<reference key="1">
    <citation type="journal article" date="2020" name="Nature">
        <title>A new coronavirus associated with human respiratory disease in China.</title>
        <authorList>
            <person name="Wu F."/>
            <person name="Zhao S."/>
            <person name="Yu B."/>
            <person name="Chen Y.-M."/>
            <person name="Wang W."/>
            <person name="Song Z.-G."/>
            <person name="Hu Y."/>
            <person name="Tao Z.-W."/>
            <person name="Tian J.-H."/>
            <person name="Pei Y.-Y."/>
            <person name="Yuan M.-L."/>
            <person name="Zhang Y.-L."/>
            <person name="Dai F.-H."/>
            <person name="Liu Y."/>
            <person name="Wang Q.-M."/>
            <person name="Zheng J.-J."/>
            <person name="Xu L."/>
            <person name="Holmes E.C."/>
            <person name="Zhang Y.-Z."/>
        </authorList>
    </citation>
    <scope>NUCLEOTIDE SEQUENCE [GENOMIC RNA]</scope>
</reference>
<reference key="2">
    <citation type="journal article" date="2020" name="Cell">
        <title>SARS-CoV-2 cell entry depends on ACE2 and TMPRSS2 and is blocked by a clinically proven protease inhibitor.</title>
        <authorList>
            <person name="Hoffmann M."/>
            <person name="Kleine-Weber H."/>
            <person name="Schroeder S."/>
            <person name="Krueger N."/>
            <person name="Herrler T."/>
            <person name="Erichsen S."/>
            <person name="Schiergens T.S."/>
            <person name="Herrler G."/>
            <person name="Wu N.H."/>
            <person name="Nitsche A."/>
            <person name="Mueller M.A."/>
            <person name="Drosten C."/>
            <person name="Poehlmann S."/>
        </authorList>
    </citation>
    <scope>FUNCTION (SPIKE PROTEIN S1)</scope>
    <scope>CLEAVAGE BETWEEN S2 AND S2' BY HOST TMPRSS2</scope>
</reference>
<reference key="3">
    <citation type="journal article" date="2020" name="Mol. Cell">
        <title>A multibasic cleavage site in the Spike protein of SARS-CoV-2 is essential for infection of human lung cells.</title>
        <authorList>
            <person name="Hoffmann M."/>
            <person name="Kleine-Weber H."/>
            <person name="Poehlmann S."/>
        </authorList>
    </citation>
    <scope>CLEAVAGE BETWEEN S1 AND S2 BY HOST FURIN</scope>
    <scope>FUNCTION</scope>
    <scope>MUTAGENESIS OF 681-PRO--ALA-684</scope>
</reference>
<reference key="4">
    <citation type="journal article" date="2020" name="Science">
        <title>Site-specific glycan analysis of the SARS-CoV-2 spike.</title>
        <authorList>
            <person name="Watanabe Y."/>
            <person name="Allen J.D."/>
            <person name="Wrapp D."/>
            <person name="McLellan J.S."/>
            <person name="Crispin M."/>
        </authorList>
    </citation>
    <scope>GLYCOSYLATION AT ASN-17; ASN-61; ASN-74; ASN-122; ASN-149; ASN-165; ASN-234; ASN-282; ASN-331; ASN-343; ASN-603; ASN-616; ASN-657; ASN-709; ASN-717; ASN-801; ASN-1074; ASN-1098; ASN-1134; ASN-1158; ASN-1173 AND ASN-1194</scope>
    <scope>IDENTIFICATION BY MASS SPECTROMETRY</scope>
</reference>
<reference key="5">
    <citation type="journal article" date="2020" name="Glycobiology">
        <title>Deducing the N- and O- glycosylation profile of the spike protein of novel coronavirus SARS-CoV-2.</title>
        <authorList>
            <person name="Shajahan A."/>
            <person name="Supekar N.T."/>
            <person name="Gleinich A.S."/>
            <person name="Azadi P."/>
        </authorList>
    </citation>
    <scope>GLYCOSYLATION AT ASN-61; ASN-74; ASN-122; ASN-149; ASN-165; ASN-234; ASN-282; THR-323; SER-325; ASN-331; ASN-343; ASN-616; ASN-657; ASN-709; ASN-717; ASN-801; ASN-1074; ASN-1098 AND ASN-1194</scope>
    <scope>IDENTIFICATION BY MASS SPECTROMETRY</scope>
</reference>
<reference key="6">
    <citation type="journal article" date="2020" name="Sci. Rep.">
        <title>Evolutionary and structural analyses of SARS-CoV-2 D614G spike protein mutation now documented worldwide.</title>
        <authorList>
            <person name="Isabel S."/>
            <person name="Grana-Miraglia L."/>
            <person name="Gutierrez J.M."/>
            <person name="Bundalovic-Torma C."/>
            <person name="Groves H.E."/>
            <person name="Isabel M.R."/>
            <person name="Eshaghi A."/>
            <person name="Patel S.N."/>
            <person name="Gubbay J.B."/>
            <person name="Poutanen T."/>
            <person name="Guttman D.S."/>
            <person name="Poutanen S.M."/>
        </authorList>
    </citation>
    <scope>VARIANT GLY-614</scope>
</reference>
<reference key="7">
    <citation type="journal article" date="2020" name="Cell">
        <title>Tracking Changes in SARS-CoV-2 Spike: Evidence that D614G Increases Infectivity of the COVID-19 Virus.</title>
        <authorList>
            <consortium name="Sheffield COVID-19 Genomics Group"/>
            <person name="Korber B."/>
            <person name="Fischer W.M."/>
            <person name="Gnanakaran S."/>
            <person name="Yoon H."/>
            <person name="Theiler J."/>
            <person name="Abfalterer W."/>
            <person name="Hengartner N."/>
            <person name="Giorgi E.E."/>
            <person name="Bhattacharya T."/>
            <person name="Foley B."/>
            <person name="Hastie K.M."/>
            <person name="Parker M.D."/>
            <person name="Partridge D.G."/>
            <person name="Evans C.M."/>
            <person name="Freeman T.M."/>
            <person name="de Silva T.I."/>
            <person name="McDanal C."/>
            <person name="Perez L.G."/>
            <person name="Tang H."/>
            <person name="Moon-Walker A."/>
            <person name="Whelan S.P."/>
            <person name="LaBranche C.C."/>
            <person name="Saphire E.O."/>
            <person name="Montefiori D.C."/>
        </authorList>
    </citation>
    <scope>VARIANT GLY-614</scope>
    <scope>MUTAGENESIS OF ASP-614</scope>
</reference>
<reference key="8">
    <citation type="journal article" date="2020" name="Science">
        <title>In situ structural analysis of SARS-CoV-2 spike reveals flexibility mediated by three hinges.</title>
        <authorList>
            <person name="Turonova B."/>
            <person name="Sikora M."/>
            <person name="Schuermann C."/>
            <person name="Hagen W.J.H."/>
            <person name="Welsch S."/>
            <person name="Blanc F.E.C."/>
            <person name="von Buelow S."/>
            <person name="Gecht M."/>
            <person name="Bagola K."/>
            <person name="Hoerner C."/>
            <person name="van Zandbergen G."/>
            <person name="Landry J."/>
            <person name="de Azevedo N.T.D."/>
            <person name="Mosalaganti S."/>
            <person name="Schwarz A."/>
            <person name="Covino R."/>
            <person name="Muehlebach M.D."/>
            <person name="Hummer G."/>
            <person name="Krijnse Locker J."/>
            <person name="Beck M."/>
        </authorList>
    </citation>
    <scope>FUNCTION</scope>
</reference>
<reference key="9">
    <citation type="journal article" date="2020" name="Sci. Rep.">
        <title>Analysis of the SARS-CoV-2 spike protein glycan shield reveals implications for immune recognition.</title>
        <authorList>
            <person name="Grant O.C."/>
            <person name="Montgomery D."/>
            <person name="Ito K."/>
            <person name="Woods R.J."/>
        </authorList>
    </citation>
    <scope>GLYCOSYLATION</scope>
</reference>
<reference key="10">
    <citation type="journal article" date="2020" name="Cell">
        <title>Molecular Architecture of the SARS-CoV-2 Virus.</title>
        <authorList>
            <person name="Yao H."/>
            <person name="Song Y."/>
            <person name="Chen Y."/>
            <person name="Wu N."/>
            <person name="Xu J."/>
            <person name="Sun C."/>
            <person name="Zhang J."/>
            <person name="Weng T."/>
            <person name="Zhang Z."/>
            <person name="Wu Z."/>
            <person name="Cheng L."/>
            <person name="Shi D."/>
            <person name="Lu X."/>
            <person name="Lei J."/>
            <person name="Crispin M."/>
            <person name="Shi Y."/>
            <person name="Li L."/>
            <person name="Li S."/>
        </authorList>
    </citation>
    <scope>GLYCOSYLATION AT ASN-17; ASN-61; ASN-74; ASN-122; ASN-149; ASN-165; ASN-234; ASN-282; ASN-331; ASN-343; ASN-603; ASN-616; ASN-657; ASN-709; ASN-717; ASN-801; ASN-1074; ASN-1098; ASN-1134; ASN-1158; ASN-1173 AND ASN-1194</scope>
    <scope>IDENTIFICATION BY MASS SPECTROMETRY</scope>
    <scope>SUBCELLULAR LOCATION</scope>
    <scope>SUBUNIT</scope>
</reference>
<reference key="11">
    <citation type="journal article" date="2020" name="Nature">
        <title>Spike mutation D614G alters SARS-CoV-2 fitness.</title>
        <authorList>
            <person name="Plante J.A."/>
            <person name="Liu Y."/>
            <person name="Liu J."/>
            <person name="Xia H."/>
            <person name="Johnson B.A."/>
            <person name="Lokugamage K.G."/>
            <person name="Zhang X."/>
            <person name="Muruato A.E."/>
            <person name="Zou J."/>
            <person name="Fontes-Garfias C.R."/>
            <person name="Mirchandani D."/>
            <person name="Scharton D."/>
            <person name="Bilello J.P."/>
            <person name="Ku Z."/>
            <person name="An Z."/>
            <person name="Kalveram B."/>
            <person name="Freiberg A.N."/>
            <person name="Menachery V.D."/>
            <person name="Xie X."/>
            <person name="Plante K.S."/>
            <person name="Weaver S.C."/>
            <person name="Shi P.Y."/>
        </authorList>
    </citation>
    <scope>VARIANT GLY-614</scope>
    <scope>MUTAGENESIS OF ASP-614</scope>
</reference>
<reference key="12">
    <citation type="journal article" date="2020" name="Science">
        <title>Neuropilin-1 is a host factor for SARS-CoV-2 infection.</title>
        <authorList>
            <person name="Daly J.L."/>
            <person name="Simonetti B."/>
            <person name="Klein K."/>
            <person name="Chen K.E."/>
            <person name="Williamson M.K."/>
            <person name="Anton-Plagaro C."/>
            <person name="Shoemark D.K."/>
            <person name="Simon-Gracia L."/>
            <person name="Bauer M."/>
            <person name="Hollandi R."/>
            <person name="Greber U.F."/>
            <person name="Horvath P."/>
            <person name="Sessions R.B."/>
            <person name="Helenius A."/>
            <person name="Hiscox J.A."/>
            <person name="Teesalu T."/>
            <person name="Matthews D.A."/>
            <person name="Davidson A.D."/>
            <person name="Collins B.M."/>
            <person name="Cullen P.J."/>
            <person name="Yamauchi Y."/>
        </authorList>
    </citation>
    <scope>FUNCTION</scope>
    <scope>INTERACTION WITH HUMAN NRP1 AND NRP2</scope>
    <source>
        <strain>SARS-CoV-2/human/Liverpool/REMRQ001/2020</strain>
    </source>
</reference>
<reference key="13">
    <citation type="journal article" date="2020" name="Science">
        <title>Neuropilin-1 facilitates SARS-CoV-2 cell entry and infectivity.</title>
        <authorList>
            <person name="Cantuti-Castelvetri L."/>
            <person name="Ojha R."/>
            <person name="Pedro L.D."/>
            <person name="Djannatian M."/>
            <person name="Franz J."/>
            <person name="Kuivanen S."/>
            <person name="van der Meer F."/>
            <person name="Kallio K."/>
            <person name="Kaya T."/>
            <person name="Anastasina M."/>
            <person name="Smura T."/>
            <person name="Levanov L."/>
            <person name="Szirovicza L."/>
            <person name="Tobi A."/>
            <person name="Kallio-Kokko H."/>
            <person name="Oesterlund P."/>
            <person name="Joensuu M."/>
            <person name="Meunier F.A."/>
            <person name="Butcher S.J."/>
            <person name="Winkler M.S."/>
            <person name="Mollenhauer B."/>
            <person name="Helenius A."/>
            <person name="Gokce O."/>
            <person name="Teesalu T."/>
            <person name="Hepojoki J."/>
            <person name="Vapalahti O."/>
            <person name="Stadelmann C."/>
            <person name="Balistreri G."/>
            <person name="Simons M."/>
        </authorList>
    </citation>
    <scope>FUNCTION</scope>
    <scope>INTERACTION WITH HUMAN NRP1 AND NRP2</scope>
    <source>
        <strain>SARS-CoV-2/human/Finland/1/2020</strain>
    </source>
</reference>
<reference key="14">
    <citation type="journal article" date="2021" name="JACC Basic Transl. Sci.">
        <title>The Integrin Binding Peptide, ATN-161, as a Novel Therapy for SARS-CoV-2 Infection.</title>
        <authorList>
            <person name="Beddingfield B.J."/>
            <person name="Iwanaga N."/>
            <person name="Chapagain P.P."/>
            <person name="Zheng W."/>
            <person name="Roy C.J."/>
            <person name="Hu T.Y."/>
            <person name="Kolls J.K."/>
            <person name="Bix G.J."/>
        </authorList>
    </citation>
    <scope>INTERACTION WITH HUMAN ITGA5 AND ITGB1</scope>
</reference>
<reference key="15">
    <citation type="journal article" date="2020" name="Science">
        <title>SARS-CoV-2 D614G variant exhibits efficient replication ex vivo and transmission in vivo.</title>
        <authorList>
            <person name="Hou Y.J."/>
            <person name="Chiba S."/>
            <person name="Halfmann P."/>
            <person name="Ehre C."/>
            <person name="Kuroda M."/>
            <person name="Dinnon K.H. III"/>
            <person name="Leist S.R."/>
            <person name="Schaefer A."/>
            <person name="Nakajima N."/>
            <person name="Takahashi K."/>
            <person name="Lee R.E."/>
            <person name="Mascenik T.M."/>
            <person name="Graham R."/>
            <person name="Edwards C.E."/>
            <person name="Tse L.V."/>
            <person name="Okuda K."/>
            <person name="Markmann A.J."/>
            <person name="Bartelt L."/>
            <person name="de Silva A."/>
            <person name="Margolis D.M."/>
            <person name="Boucher R.C."/>
            <person name="Randell S.H."/>
            <person name="Suzuki T."/>
            <person name="Gralinski L.E."/>
            <person name="Kawaoka Y."/>
            <person name="Baric R.S."/>
        </authorList>
    </citation>
    <scope>VARIANT GLY-614</scope>
</reference>
<reference key="16">
    <citation type="journal article" date="2021" name="Cell Rep.">
        <title>D614G Mutation Alters SARS-CoV-2 Spike Conformation and Enhances Protease Cleavage at the S1/S2 Junction.</title>
        <authorList>
            <person name="Gobeil S.M."/>
            <person name="Janowska K."/>
            <person name="McDowell S."/>
            <person name="Mansouri K."/>
            <person name="Parks R."/>
            <person name="Manne K."/>
            <person name="Stalls V."/>
            <person name="Kopp M.F."/>
            <person name="Henderson R."/>
            <person name="Edwards R.J."/>
            <person name="Haynes B.F."/>
            <person name="Acharya P."/>
        </authorList>
    </citation>
    <scope>VARIANT GLY-614</scope>
</reference>
<reference key="17">
    <citation type="journal article" date="2021" name="Eurosurveillance">
        <title>Early transmissibility assessment of the N501Y mutant strains of SARS-CoV-2 in the United Kingdom, October to November 2020.</title>
        <authorList>
            <person name="Leung K."/>
            <person name="Shum M.H."/>
            <person name="Leung G.M."/>
            <person name="Lam T.T."/>
            <person name="Wu J.T."/>
        </authorList>
    </citation>
    <scope>VARIANTS 69-VAL--PHE-70 DEL; LYS-144 DEL; TYR-501; ASP-570; GLY-614; HIS-681; ILE-716; ALA-982 AND HIS-1118</scope>
    <source>
        <strain>20I/501Y.V1</strain>
        <strain>Alpha</strain>
        <strain>B.1.1.7</strain>
        <strain>VOC-202012/01</strain>
        <strain>VUI-202012/01</strain>
    </source>
</reference>
<reference key="18">
    <citation type="journal article" date="2020" name="Science">
        <title>Adaptation of SARS-CoV-2 in BALB/c mice for testing vaccine efficacy.</title>
        <authorList>
            <person name="Gu H."/>
            <person name="Chen Q."/>
            <person name="Yang G."/>
            <person name="He L."/>
            <person name="Fan H."/>
            <person name="Deng Y.Q."/>
            <person name="Wang Y."/>
            <person name="Teng Y."/>
            <person name="Zhao Z."/>
            <person name="Cui Y."/>
            <person name="Li Y."/>
            <person name="Li X.F."/>
            <person name="Li J."/>
            <person name="Zhang N.N."/>
            <person name="Yang X."/>
            <person name="Chen S."/>
            <person name="Guo Y."/>
            <person name="Zhao G."/>
            <person name="Wang X."/>
            <person name="Luo D.Y."/>
            <person name="Wang H."/>
            <person name="Yang X."/>
            <person name="Li Y."/>
            <person name="Han G."/>
            <person name="He Y."/>
            <person name="Zhou X."/>
            <person name="Geng S."/>
            <person name="Sheng X."/>
            <person name="Jiang S."/>
            <person name="Sun S."/>
            <person name="Qin C.F."/>
            <person name="Zhou Y."/>
        </authorList>
    </citation>
    <scope>VARIANT TYR-501</scope>
</reference>
<reference key="19">
    <citation type="journal article" date="2021" name="Nature">
        <title>SARS-CoV-2 spike D614G change enhances replication and transmission.</title>
        <authorList>
            <person name="Zhou B."/>
            <person name="Thi Nhu Thao T."/>
            <person name="Hoffmann D."/>
            <person name="Taddeo A."/>
            <person name="Ebert N."/>
            <person name="Labroussaa F."/>
            <person name="Pohlmann A."/>
            <person name="King J."/>
            <person name="Steiner S."/>
            <person name="Kelly J.N."/>
            <person name="Portmann J."/>
            <person name="Halwe N.J."/>
            <person name="Ulrich L."/>
            <person name="Trueeb B.S."/>
            <person name="Fan X."/>
            <person name="Hoffmann B."/>
            <person name="Wang L."/>
            <person name="Thomann L."/>
            <person name="Lin X."/>
            <person name="Stalder H."/>
            <person name="Pozzi B."/>
            <person name="de Brot S."/>
            <person name="Jiang N."/>
            <person name="Cui D."/>
            <person name="Hossain J."/>
            <person name="Wilson M."/>
            <person name="Keller M."/>
            <person name="Stark T.J."/>
            <person name="Barnes J.R."/>
            <person name="Dijkman R."/>
            <person name="Jores J."/>
            <person name="Benarafa C."/>
            <person name="Wentworth D.E."/>
            <person name="Thiel V."/>
            <person name="Beer M."/>
        </authorList>
    </citation>
    <scope>VARIANT GLY-614</scope>
    <scope>MUTAGENESIS OF GLY-614</scope>
</reference>
<reference key="20">
    <citation type="journal article" date="2020" name="Cell">
        <title>The Impact of Mutations in SARS-CoV-2 Spike on Viral Infectivity and Antigenicity.</title>
        <authorList>
            <person name="Li Q."/>
            <person name="Wu J."/>
            <person name="Nie J."/>
            <person name="Zhang L."/>
            <person name="Hao H."/>
            <person name="Liu S."/>
            <person name="Zhao C."/>
            <person name="Zhang Q."/>
            <person name="Liu H."/>
            <person name="Nie L."/>
            <person name="Qin H."/>
            <person name="Wang M."/>
            <person name="Lu Q."/>
            <person name="Li X."/>
            <person name="Sun Q."/>
            <person name="Liu J."/>
            <person name="Zhang L."/>
            <person name="Li X."/>
            <person name="Huang W."/>
            <person name="Wang Y."/>
        </authorList>
    </citation>
    <scope>MUTAGENESIS OF ASN-165; ASN-234; ASN-331; ASN-343; LEU-452; ALA-475; VAL-483; PHE-490 AND HIS-519</scope>
</reference>
<reference key="21">
    <citation type="journal article" date="2020" name="Nat. Commun.">
        <title>Characterization of spike glycoprotein of SARS-CoV-2 on virus entry and its immune cross-reactivity with SARS-CoV.</title>
        <authorList>
            <person name="Ou X."/>
            <person name="Liu Y."/>
            <person name="Lei X."/>
            <person name="Li P."/>
            <person name="Mi D."/>
            <person name="Ren L."/>
            <person name="Guo L."/>
            <person name="Guo R."/>
            <person name="Chen T."/>
            <person name="Hu J."/>
            <person name="Xiang Z."/>
            <person name="Mu Z."/>
            <person name="Chen X."/>
            <person name="Chen J."/>
            <person name="Hu K."/>
            <person name="Jin Q."/>
            <person name="Wang J."/>
            <person name="Qian Z."/>
        </authorList>
    </citation>
    <scope>FUNCTION</scope>
    <scope>CLEAVAGE BETWEEN S1 AND S2 BY HOST CTSL</scope>
    <scope>INTERACTION WITH HUMAN ACE2</scope>
</reference>
<reference key="22">
    <citation type="journal article" date="2021" name="Biophys. J.">
        <title>Biomechanical characterization of SARS-CoV-2 spike RBD and human ACE2 protein-protein interaction.</title>
        <authorList>
            <person name="Cao W."/>
            <person name="Dong C."/>
            <person name="Kim S."/>
            <person name="Hou D."/>
            <person name="Tai W."/>
            <person name="Du L."/>
            <person name="Im W."/>
            <person name="Zhang X.F."/>
        </authorList>
    </citation>
    <scope>INTERACTION WITH HUMAN ACE2</scope>
</reference>
<reference key="23">
    <citation type="journal article" date="2021" name="PLoS Pathog.">
        <title>Hydroxychloroquine-mediated inhibition of SARS-CoV-2 entry is attenuated by TMPRSS2.</title>
        <authorList>
            <person name="Ou T."/>
            <person name="Mou H."/>
            <person name="Zhang L."/>
            <person name="Ojha A."/>
            <person name="Choe H."/>
            <person name="Farzan M."/>
        </authorList>
    </citation>
    <scope>FUNCTION</scope>
    <scope>CLEAVAGE BETWEEN S1 AND S2 BY HOST TMPRSS2</scope>
</reference>
<reference key="24">
    <citation type="journal article" date="2020" name="J. Biol. Chem.">
        <title>The SARS-CoV-2 Envelope and Membrane proteins modulate maturation and retention of the Spike protein, allowing assembly of virus-like particles.</title>
        <authorList>
            <person name="Boson B."/>
            <person name="Legros V."/>
            <person name="Zhou B."/>
            <person name="Siret E."/>
            <person name="Mathieu C."/>
            <person name="Cosset F.L."/>
            <person name="Lavillette D."/>
            <person name="Denolly S."/>
        </authorList>
    </citation>
    <scope>SUBCELLULAR LOCATION</scope>
    <scope>INTERACTION WITH S PROTEIN</scope>
</reference>
<reference key="25">
    <citation type="journal article" date="2020" name="Life. Sci Alliance">
        <title>TMPRSS2 and furin are both essential for proteolytic activation of SARS-CoV-2 in human airway cells.</title>
        <authorList>
            <person name="Bestle D."/>
            <person name="Heindl M.R."/>
            <person name="Limburg H."/>
            <person name="Van Lam van T."/>
            <person name="Pilgram O."/>
            <person name="Moulton H."/>
            <person name="Stein D.A."/>
            <person name="Hardes K."/>
            <person name="Eickmann M."/>
            <person name="Dolnik O."/>
            <person name="Rohde C."/>
            <person name="Klenk H.D."/>
            <person name="Garten W."/>
            <person name="Steinmetzer T."/>
            <person name="Boettcher-Friebertshaeuser E."/>
        </authorList>
    </citation>
    <scope>CLEAVAGE BETWEEN S1 AND S2 BY HOST FURIN</scope>
    <scope>CLEAVAGE BETWEEN S2 AND S2' BY HOST TMPRSS2</scope>
    <scope>MUTAGENESIS OF ALA-684</scope>
    <scope>FUNCTION (SPIKE PROTEIN S2')</scope>
</reference>
<reference key="26">
    <citation type="journal article" date="2021" name="EMBO J.">
        <title>TMPRSS2 expression dictates the entry route used by SARS-CoV-2 to infect host cells.</title>
        <authorList>
            <person name="Koch J."/>
            <person name="Uckeley Z.M."/>
            <person name="Doldan P."/>
            <person name="Stanifer M."/>
            <person name="Boulant S."/>
            <person name="Lozach P.Y."/>
        </authorList>
    </citation>
    <scope>CLEAVAGE BETWEEN S1 AND S2 BY HOST FURIN</scope>
    <scope>CLEAVAGE BETWEEN S2 AND S2' BY HOST TMPRSS2</scope>
    <scope>CLEAVAGE BETWEEN S2 AND S2' BY HOST CSTL</scope>
    <scope>FUNCTION (SPIKE PROTEIN S2')</scope>
</reference>
<reference key="27">
    <citation type="journal article" date="2021" name="Nature">
        <title>Emergence of a SARS-CoV-2 variant of concern with mutations in spike glycoprotein.</title>
        <authorList>
            <person name="Tegally H."/>
            <person name="Wilkinson E."/>
            <person name="Giovanetti M."/>
            <person name="Iranzadeh A."/>
            <person name="Fonseca V."/>
            <person name="Giandhari J."/>
            <person name="Doolabh D."/>
            <person name="Pillay S."/>
            <person name="San E.J."/>
            <person name="Msomi N."/>
            <person name="Mlisana K."/>
            <person name="von Gottberg A."/>
            <person name="Walaza S."/>
            <person name="Allam M."/>
            <person name="Ismail A."/>
            <person name="Mohale T."/>
            <person name="Glass A.J."/>
            <person name="Engelbrecht S."/>
            <person name="Van Zyl G."/>
            <person name="Preiser W."/>
            <person name="Petruccione F."/>
            <person name="Sigal A."/>
            <person name="Hardie D."/>
            <person name="Marais G."/>
            <person name="Hsiao M."/>
            <person name="Korsman S."/>
            <person name="Davies M.A."/>
            <person name="Tyers L."/>
            <person name="Mudau I."/>
            <person name="York D."/>
            <person name="Maslo C."/>
            <person name="Goedhals D."/>
            <person name="Abrahams S."/>
            <person name="Laguda-Akingba O."/>
            <person name="Alisoltani-Dehkordi A."/>
            <person name="Godzik A."/>
            <person name="Wibmer C.K."/>
            <person name="Sewell B.T."/>
            <person name="Lourenco J."/>
            <person name="Alcantara L.C.J."/>
            <person name="Kosakovsky Pond S.L."/>
            <person name="Weaver S."/>
            <person name="Martin D."/>
            <person name="Lessells R.J."/>
            <person name="Bhiman J.N."/>
            <person name="Williamson C."/>
            <person name="de Oliveira T."/>
        </authorList>
    </citation>
    <scope>VARIANTS PHE-18; ALA-80; GLY-215; ASN-417; LYS-484; TYR-501; GLY-614 AND VAL-701</scope>
    <source>
        <strain>20H/501Y.V2</strain>
        <strain>B.1.351</strain>
        <strain>Beta</strain>
    </source>
</reference>
<reference key="28">
    <citation type="journal article" date="2021" name="Eurosurveillance">
        <title>Increased transmissibility and global spread of SARS-CoV-2 variants of concern as at June 2021.</title>
        <authorList>
            <person name="Campbell F."/>
            <person name="Archer B."/>
            <person name="Laurenson-Schafer H."/>
            <person name="Jinnai Y."/>
            <person name="Konings F."/>
            <person name="Batra N."/>
            <person name="Pavlin B."/>
            <person name="Vandemaele K."/>
            <person name="Van Kerkhove M.D."/>
            <person name="Jombart T."/>
            <person name="Morgan O."/>
            <person name="le Polain de Waroux O."/>
        </authorList>
    </citation>
    <scope>POLYMORPHISM</scope>
</reference>
<reference key="29">
    <citation type="journal article" date="2021" name="Cell Host Microbe">
        <title>SARS-CoV-2 spike L452R variant evades cellular immunity and increases infectivity.</title>
        <authorList>
            <consortium name="Genotype to Phenotype Japan (G2P-Japan) Consortium"/>
            <person name="Motozono C."/>
            <person name="Toyoda M."/>
            <person name="Zahradnik J."/>
            <person name="Saito A."/>
            <person name="Nasser H."/>
            <person name="Tan T.S."/>
            <person name="Ngare I."/>
            <person name="Kimura I."/>
            <person name="Uriu K."/>
            <person name="Kosugi Y."/>
            <person name="Yue Y."/>
            <person name="Shimizu R."/>
            <person name="Ito J."/>
            <person name="Torii S."/>
            <person name="Yonekawa A."/>
            <person name="Shimono N."/>
            <person name="Nagasaki Y."/>
            <person name="Minami R."/>
            <person name="Toya T."/>
            <person name="Sekiya N."/>
            <person name="Fukuhara T."/>
            <person name="Matsuura Y."/>
            <person name="Schreiber G."/>
            <person name="Ikeda T."/>
            <person name="Nakagawa S."/>
            <person name="Ueno T."/>
            <person name="Sato K."/>
        </authorList>
    </citation>
    <scope>VARIANTS ARG-452 AND PHE-453</scope>
    <scope>MUTAGENESIS OF LEU-452; TYR-453 AND ASN-501</scope>
</reference>
<reference key="30">
    <citation type="journal article" date="2021" name="Cell Rep.">
        <title>Recurrent emergence of SARS-CoV-2 spike deletion H69/V70 and its role in the Alpha variant B.1.1.7.</title>
        <authorList>
            <consortium name="COVID-19 Genomics UK (COG-UK) Consortium"/>
            <person name="Meng B."/>
            <person name="Kemp S.A."/>
            <person name="Papa G."/>
            <person name="Datir R."/>
            <person name="Ferreira I.A.T.M."/>
            <person name="Marelli S."/>
            <person name="Harvey W.T."/>
            <person name="Lytras S."/>
            <person name="Mohamed A."/>
            <person name="Gallo G."/>
            <person name="Thakur N."/>
            <person name="Collier D.A."/>
            <person name="Mlcochova P."/>
            <person name="Duncan L.M."/>
            <person name="Carabelli A.M."/>
            <person name="Kenyon J.C."/>
            <person name="Lever A.M."/>
            <person name="De Marco A."/>
            <person name="Saliba C."/>
            <person name="Culap K."/>
            <person name="Cameroni E."/>
            <person name="Matheson N.J."/>
            <person name="Piccoli L."/>
            <person name="Corti D."/>
            <person name="James L.C."/>
            <person name="Robertson D.L."/>
            <person name="Bailey D."/>
            <person name="Gupta R.K."/>
        </authorList>
    </citation>
    <scope>VARIANT 69-VAL--PHE-70 DEL</scope>
    <scope>MUTAGENESIS OF 69-HIS-VAL-70</scope>
</reference>
<reference key="31">
    <citation type="journal article" date="2021" name="Science">
        <title>SARS-CoV-2 immune evasion by the B.1.427/B.1.429 variant of concern.</title>
        <authorList>
            <person name="McCallum M."/>
            <person name="Bassi J."/>
            <person name="De Marco A."/>
            <person name="Chen A."/>
            <person name="Walls A.C."/>
            <person name="Di Iulio J."/>
            <person name="Tortorici M.A."/>
            <person name="Navarro M.J."/>
            <person name="Silacci-Fregni C."/>
            <person name="Saliba C."/>
            <person name="Sprouse K.R."/>
            <person name="Agostini M."/>
            <person name="Pinto D."/>
            <person name="Culap K."/>
            <person name="Bianchi S."/>
            <person name="Jaconi S."/>
            <person name="Cameroni E."/>
            <person name="Bowen J.E."/>
            <person name="Tilles S.W."/>
            <person name="Pizzuto M.S."/>
            <person name="Guastalla S.B."/>
            <person name="Bona G."/>
            <person name="Pellanda A.F."/>
            <person name="Garzoni C."/>
            <person name="Van Voorhis W.C."/>
            <person name="Rosen L.E."/>
            <person name="Snell G."/>
            <person name="Telenti A."/>
            <person name="Virgin H.W."/>
            <person name="Piccoli L."/>
            <person name="Corti D."/>
            <person name="Veesler D."/>
        </authorList>
    </citation>
    <scope>VARIANTS ILE-13 AND CYS-152</scope>
    <scope>POLYMORPHISM</scope>
    <scope>MASS SPECTROMETRY (SIGNAL)</scope>
</reference>
<reference key="32">
    <citation type="journal article" date="2021" name="Nat. Commun.">
        <title>Sequences in the cytoplasmic tail of SARS-CoV-2 Spike facilitate expression at the cell surface and syncytia formation.</title>
        <authorList>
            <person name="Cattin-Ortola J."/>
            <person name="Welch L.G."/>
            <person name="Maslen S.L."/>
            <person name="Papa G."/>
            <person name="James L.C."/>
            <person name="Munro S."/>
        </authorList>
    </citation>
    <scope>SUBCELLULAR LOCATION</scope>
    <scope>MUTAGENESIS OF LYS-1269 AND HIS-1271</scope>
</reference>
<reference key="33">
    <citation type="journal article" date="2021" name="Dev. Cell">
        <title>S-acylation controls SARS-CoV-2 membrane lipid organization and enhances infectivity.</title>
        <authorList>
            <person name="Mesquita F.S."/>
            <person name="Abrami L."/>
            <person name="Sergeeva O."/>
            <person name="Turelli P."/>
            <person name="Qing E."/>
            <person name="Kunz B."/>
            <person name="Raclot C."/>
            <person name="Paz Montoya J."/>
            <person name="Abriata L.A."/>
            <person name="Gallagher T."/>
            <person name="Dal Peraro M."/>
            <person name="Trono D."/>
            <person name="D'Angelo G."/>
            <person name="van der Goot F.G."/>
        </authorList>
    </citation>
    <scope>PALMITOYLATION AT CYS-1235; CYS-1236; CYS-1240; CYS-1241; CYS-1243; CYS-1247; CYS-1248; CYS-1250; CYS-1253 AND CYS-1254</scope>
</reference>
<reference evidence="64" key="34">
    <citation type="journal article" date="2020" name="Science">
        <title>Structural basis for the recognition of the SARS-CoV-2 by full-length human ACE2.</title>
        <authorList>
            <person name="Yan R."/>
            <person name="Zhang Y."/>
            <person name="Li Y."/>
            <person name="Xia L."/>
            <person name="Guo Y."/>
            <person name="Zhou Q."/>
        </authorList>
    </citation>
    <scope>STRUCTURE BY ELECTRON MICROSCOPY (2.90 ANGSTROMS)</scope>
    <scope>FUNCTION (SPIKE PROTEIN S1)</scope>
    <scope>DOMAIN</scope>
    <scope>INTERACTION WITH HUMAN ACE2 (SPIKE PROTEIN S1)</scope>
</reference>
<reference key="35">
    <citation type="journal article" date="2020" name="Proc. Natl. Acad. Sci. U.S.A.">
        <title>Superantigenic character of an insert unique to SARS-CoV-2 spike supported by skewed TCR repertoire in patients with hyperinflammation.</title>
        <authorList>
            <person name="Cheng M.H."/>
            <person name="Zhang S."/>
            <person name="Porritt R.A."/>
            <person name="Noval Rivas M."/>
            <person name="Paschold L."/>
            <person name="Willscher E."/>
            <person name="Binder M."/>
            <person name="Arditi M."/>
            <person name="Bahar I."/>
        </authorList>
    </citation>
    <scope>SUPERANTIGEN</scope>
    <scope>DOMAIN</scope>
</reference>
<reference key="36">
    <citation type="journal article" date="2021" name="Sci. Adv.">
        <title>SARS-CoV-2 can recruit a heme metabolite to evade antibody immunity.</title>
        <authorList>
            <person name="Rosa A."/>
            <person name="Pye V.E."/>
            <person name="Graham C."/>
            <person name="Muir L."/>
            <person name="Seow J."/>
            <person name="Ng K.W."/>
            <person name="Cook N.J."/>
            <person name="Rees-Spear C."/>
            <person name="Parker E."/>
            <person name="Dos Santos M.S."/>
            <person name="Rosadas C."/>
            <person name="Susana A."/>
            <person name="Rhys H."/>
            <person name="Nans A."/>
            <person name="Masino L."/>
            <person name="Roustan C."/>
            <person name="Christodoulou E."/>
            <person name="Ulferts R."/>
            <person name="Wrobel A.G."/>
            <person name="Short C.E."/>
            <person name="Fertleman M."/>
            <person name="Sanders R.W."/>
            <person name="Heaney J."/>
            <person name="Spyer M."/>
            <person name="Kjaer S."/>
            <person name="Riddell A."/>
            <person name="Malim M.H."/>
            <person name="Beale R."/>
            <person name="MacRae J.I."/>
            <person name="Taylor G.P."/>
            <person name="Nastouli E."/>
            <person name="van Gils M.J."/>
            <person name="Rosenthal P.B."/>
            <person name="Pizzato M."/>
            <person name="McClure M.O."/>
            <person name="Tedder R.S."/>
            <person name="Kassiotis G."/>
            <person name="McCoy L.E."/>
            <person name="Doores K.J."/>
            <person name="Cherepanov P."/>
        </authorList>
    </citation>
    <scope>INTERACTION WITH HUMAN BILIRUBIN</scope>
    <scope>INTERACTION WITH HUMAN BILIVERDIN</scope>
    <scope>MUTAGENESIS OF ASN-121 AND ARG-190</scope>
</reference>
<reference key="37">
    <citation type="journal article" date="2021" name="Front. Immunol.">
        <title>SARS-CoV-2 Vaccines Based on the Spike Glycoprotein and Implications of New Viral Variants.</title>
        <authorList>
            <person name="Martinez-Flores D."/>
            <person name="Zepeda-Cervantes J."/>
            <person name="Cruz-Resendiz A."/>
            <person name="Aguirre-Sampieri S."/>
            <person name="Sampieri A."/>
            <person name="Vaca L."/>
        </authorList>
    </citation>
    <scope>BIOTECHNOLOGY</scope>
    <scope>MUTAGENESIS OF 682-ARG--ARG-685 AND 986-LYS-VAL-987</scope>
</reference>
<reference key="38">
    <citation type="journal article" date="2021" name="Cell Discov.">
        <title>SARS-CoV-2 uses metabotropic glutamate receptor subtype 2 as an internalization factor to infect cells.</title>
        <authorList>
            <person name="Wang J."/>
            <person name="Yang G."/>
            <person name="Wang X."/>
            <person name="Wen Z."/>
            <person name="Shuai L."/>
            <person name="Luo J."/>
            <person name="Wang C."/>
            <person name="Sun Z."/>
            <person name="Liu R."/>
            <person name="Ge J."/>
            <person name="He X."/>
            <person name="Hua R."/>
            <person name="Wang X."/>
            <person name="Yang X."/>
            <person name="Chen W."/>
            <person name="Zhong G."/>
            <person name="Bu Z."/>
        </authorList>
    </citation>
    <scope>FUNCTION</scope>
    <scope>INTERACTION WITH HOST GRM2</scope>
</reference>
<reference key="39">
    <citation type="journal article" date="2021" name="Proc. Natl. Acad. Sci. U.S.A.">
        <title>Furin cleavage of the SARS-CoV-2 spike is modulated by O-glycosylation.</title>
        <authorList>
            <person name="Zhang L."/>
            <person name="Mann M."/>
            <person name="Syed Z.A."/>
            <person name="Reynolds H.M."/>
            <person name="Tian E."/>
            <person name="Samara N.L."/>
            <person name="Zeldin D.C."/>
            <person name="Tabak L.A."/>
            <person name="Ten Hagen K.G."/>
        </authorList>
    </citation>
    <scope>GLYCOSYLATION AT THR-676 AND THR-678 BY HOST GALNT1</scope>
    <scope>MUTAGENESIS OF SER-673; THR-676; THR-678; SER-680 AND PRO-681</scope>
</reference>
<reference key="40">
    <citation type="journal article" date="2022" name="Microbiol. Immunol.">
        <title>Proteolytic activation of SARS-CoV-2 spike protein.</title>
        <authorList>
            <person name="Takeda M."/>
        </authorList>
    </citation>
    <scope>REVIEW</scope>
    <scope>PROTEOLITIC PROCESSING</scope>
    <scope>FUNCTION (SPIKE PROTEIN S2)</scope>
    <scope>FUNCTION (SPIKE PROTEIN S2')</scope>
</reference>
<reference key="41">
    <citation type="journal article" date="2022" name="Nat. Immunol.">
        <title>Recognition and inhibition of SARS-CoV-2 by humoral innate immunity pattern recognition molecules.</title>
        <authorList>
            <person name="Stravalaci M."/>
            <person name="Pagani I."/>
            <person name="Paraboschi E.M."/>
            <person name="Pedotti M."/>
            <person name="Doni A."/>
            <person name="Scavello F."/>
            <person name="Mapelli S.N."/>
            <person name="Sironi M."/>
            <person name="Perucchini C."/>
            <person name="Varani L."/>
            <person name="Matkovic M."/>
            <person name="Cavalli A."/>
            <person name="Cesana D."/>
            <person name="Gallina P."/>
            <person name="Pedemonte N."/>
            <person name="Capurro V."/>
            <person name="Clementi N."/>
            <person name="Mancini N."/>
            <person name="Invernizzi P."/>
            <person name="Bayarri-Olmos R."/>
            <person name="Garred P."/>
            <person name="Rappuoli R."/>
            <person name="Duga S."/>
            <person name="Bottazzi B."/>
            <person name="Uguccioni M."/>
            <person name="Asselta R."/>
            <person name="Vicenzi E."/>
            <person name="Mantovani A."/>
            <person name="Garlanda C."/>
        </authorList>
    </citation>
    <scope>INTERACTION WITH HOST MBL2</scope>
</reference>
<reference key="42">
    <citation type="journal article" date="2022" name="J. Biol. Chem.">
        <title>Integrin mediates cell entry of the SARS-CoV-2 virus independent of cellular receptor ACE2.</title>
        <authorList>
            <person name="Liu J."/>
            <person name="Lu F."/>
            <person name="Chen Y."/>
            <person name="Plow E."/>
            <person name="Qin J."/>
        </authorList>
    </citation>
    <scope>FUNCTION (SPIKE PROTEIN S1)</scope>
    <scope>INTERACTION WITH HOST INTEGRIN (SPIKE PROTEIN S1)</scope>
</reference>
<reference key="43">
    <citation type="journal article" date="2022" name="FEBS J.">
        <title>SARS-CoV-2 variants preferentially emerge at intrinsically disordered protein sites helping immune evasion.</title>
        <authorList>
            <person name="Quaglia F."/>
            <person name="Salladini E."/>
            <person name="Carraro M."/>
            <person name="Minervini G."/>
            <person name="Tosatto S.C.E."/>
            <person name="Le Mercier P."/>
        </authorList>
    </citation>
    <scope>DISORDERED REGIONS</scope>
</reference>
<reference key="44">
    <citation type="journal article" date="2023" name="PLoS Biol.">
        <title>LRRC15 mediates an accessory interaction with the SARS-CoV-2 spike protein.</title>
        <authorList>
            <person name="Shilts J."/>
            <person name="Crozier T.W.M."/>
            <person name="Teixeira-Silva A."/>
            <person name="Gabaev I."/>
            <person name="Gerber P.P."/>
            <person name="Greenwood E.J.D."/>
            <person name="Watson S.J."/>
            <person name="Ortmann B.M."/>
            <person name="Gawden-Bone C.M."/>
            <person name="Pauzaite T."/>
            <person name="Hoffmann M."/>
            <person name="Nathan J.A."/>
            <person name="Poehlmann S."/>
            <person name="Matheson N.J."/>
            <person name="Lehner P.J."/>
            <person name="Wright G.J."/>
        </authorList>
    </citation>
    <scope>SUBUNIT</scope>
</reference>
<reference key="45">
    <citation type="journal article" date="2023" name="Viruses">
        <title>The D405N Mutation in the Spike Protein of SARS-CoV-2 Omicron BA.5 Inhibits Spike/Integrins Interaction and Viral Infection of Human Lung Microvascular Endothelial Cells.</title>
        <authorList>
            <person name="Bugatti A."/>
            <person name="Filippini F."/>
            <person name="Messali S."/>
            <person name="Giovanetti M."/>
            <person name="Ravelli C."/>
            <person name="Zani A."/>
            <person name="Ciccozzi M."/>
            <person name="Caruso A."/>
            <person name="Caccuri F."/>
        </authorList>
    </citation>
    <scope>VARIANT ASN-405</scope>
</reference>
<reference key="46">
    <citation type="journal article" date="2023" name="J. Virol.">
        <title>Transferrin Receptor Protein 1 Cooperates with mGluR2 To Mediate the Internalization of Rabies Virus and SARS-CoV-2.</title>
        <authorList>
            <person name="Wang X."/>
            <person name="Wen Z."/>
            <person name="Cao H."/>
            <person name="Luo J."/>
            <person name="Shuai L."/>
            <person name="Wang C."/>
            <person name="Ge J."/>
            <person name="Wang X."/>
            <person name="Bu Z."/>
            <person name="Wang J."/>
        </authorList>
    </citation>
    <scope>FUNCTION</scope>
    <scope>INTERACTION WITH HOST TFRC</scope>
</reference>
<reference key="47">
    <citation type="journal article" date="2023" name="Cell">
        <title>TMEM106B is a receptor mediating ACE2-independent SARS-CoV-2 cell entry.</title>
        <authorList>
            <person name="Baggen J."/>
            <person name="Jacquemyn M."/>
            <person name="Persoons L."/>
            <person name="Vanstreels E."/>
            <person name="Pye V.E."/>
            <person name="Wrobel A.G."/>
            <person name="Calvaresi V."/>
            <person name="Martin S.R."/>
            <person name="Roustan C."/>
            <person name="Cronin N.B."/>
            <person name="Reading E."/>
            <person name="Thibaut H.J."/>
            <person name="Vercruysse T."/>
            <person name="Maes P."/>
            <person name="De Smet F."/>
            <person name="Yee A."/>
            <person name="Nivitchanyong T."/>
            <person name="Roell M."/>
            <person name="Franco-Hernandez N."/>
            <person name="Rhinn H."/>
            <person name="Mamchak A.A."/>
            <person name="Ah Young-Chapon M."/>
            <person name="Brown E."/>
            <person name="Cherepanov P."/>
            <person name="Daelemans D."/>
        </authorList>
    </citation>
    <scope>MUTAGENESIS OF GLU-484</scope>
</reference>
<reference evidence="65" key="48">
    <citation type="journal article" date="2020" name="Science">
        <title>Cryo-EM structure of the 2019-nCoV spike in the prefusion conformation.</title>
        <authorList>
            <person name="Wrapp D."/>
            <person name="Wang N."/>
            <person name="Corbett K.S."/>
            <person name="Goldsmith J.A."/>
            <person name="Hsieh C.L."/>
            <person name="Abiona O."/>
            <person name="Graham B.S."/>
            <person name="McLellan J.S."/>
        </authorList>
    </citation>
    <scope>STRUCTURE BY ELECTRON MICROSCOPY (3.46 ANGSTROMS)</scope>
    <scope>FUNCTION (SPIKE PROTEIN S1)</scope>
    <scope>INTERACTION WITH HUMAN ACE2 (SPIKE PROTEIN S1)</scope>
    <scope>SUBUNIT</scope>
    <scope>GLYCOSYLATION</scope>
</reference>
<reference evidence="66 67" key="49">
    <citation type="journal article" date="2020" name="Cell">
        <title>Structure, function, and antigenicity of the SARS-CoV-2 spike glycoprotein.</title>
        <authorList>
            <person name="Walls A.C."/>
            <person name="Park Y.J."/>
            <person name="Tortorici M.A."/>
            <person name="Wall A."/>
            <person name="McGuire A.T."/>
            <person name="Veesler D."/>
        </authorList>
    </citation>
    <scope>STRUCTURE BY ELECTRON MICROSCOPY (2.80 ANGSTROMS)</scope>
    <scope>FUNCTION (SPIKE PROTEIN S1)</scope>
    <scope>SUBUNIT (SPIKE PROTEIN S1)</scope>
    <scope>INTERACTION WITH HUMAN ACE2 (SPIKE PROTEIN S1)</scope>
    <scope>MUTAGENESIS OF 679-GLN--ALA-684</scope>
    <scope>GLYCOSYLATION AT ASN-61; ASN-122; ASN-61; ASN-165; ASN-234; ASN-282; ASN-331; ASN-343; ASN-603; ASN-616; ASN-657; ASN-709; ASN-717; ASN-801; ASN-1074; ASN-1098 AND ASN-1134</scope>
    <scope>DISULFIDE BOND</scope>
</reference>
<reference key="50">
    <citation type="journal article" date="2020" name="Nature">
        <title>Structure of the SARS-CoV-2 spike receptor-binding domain bound to the ACE2 receptor.</title>
        <authorList>
            <person name="Lan J."/>
            <person name="Ge J."/>
            <person name="Yu J."/>
            <person name="Shan S."/>
            <person name="Zhou H."/>
            <person name="Fan S."/>
            <person name="Zhang Q."/>
            <person name="Shi X."/>
            <person name="Wang Q."/>
            <person name="Zhang L."/>
            <person name="Wang X."/>
        </authorList>
    </citation>
    <scope>X-RAY CRYSTALLOGRAPHY (2.45 ANGSTROMS) OF SPIKE PROTEIN S1 AND IN COMPLEX WITH HOST ACE2</scope>
</reference>
<reference key="51">
    <citation type="journal article" date="2020" name="Nature">
        <title>Structural basis of receptor recognition by SARS-CoV-2.</title>
        <authorList>
            <person name="Shang J."/>
            <person name="Ye G."/>
            <person name="Shi K."/>
            <person name="Wan Y."/>
            <person name="Luo C."/>
            <person name="Aihara H."/>
            <person name="Geng Q."/>
            <person name="Auerbach A."/>
            <person name="Li F."/>
        </authorList>
    </citation>
    <scope>X-RAY CRYSTALLOGRAPHY (2.68 ANGSTROMS) OF SPIKE PROTEIN S1 AND IN COMPLEX WITH HOST ACE2</scope>
    <scope>INTERACTION WITH HOST ACE2</scope>
    <scope>MUTAGENESIS OF GLN-493 AND ASN-501</scope>
</reference>
<reference key="52">
    <citation type="journal article" date="2020" name="Science">
        <title>A highly conserved cryptic epitope in the receptor-binding domains of SARS-CoV-2 and SARS-CoV.</title>
        <authorList>
            <person name="Yuan M."/>
            <person name="Wu N.C."/>
            <person name="Zhu X."/>
            <person name="Lee C.D."/>
            <person name="So R.T.Y."/>
            <person name="Lv H."/>
            <person name="Mok C.K.P."/>
            <person name="Wilson I.A."/>
        </authorList>
    </citation>
    <scope>X-RAY CRYSTALLOGRAPHY (3.08 ANGSTROMS) OF SPIKE PROTEIN S1 AND IN COMPLEX WITH HUMAN ANTIBODY CR3022</scope>
    <scope>DISULFIDE BOND</scope>
</reference>
<evidence type="ECO:0000250" key="1">
    <source>
        <dbReference type="UniProtKB" id="P59594"/>
    </source>
</evidence>
<evidence type="ECO:0000255" key="2">
    <source>
        <dbReference type="HAMAP-Rule" id="MF_04099"/>
    </source>
</evidence>
<evidence type="ECO:0000255" key="3">
    <source>
        <dbReference type="PROSITE-ProRule" id="PRU01269"/>
    </source>
</evidence>
<evidence type="ECO:0000255" key="4">
    <source>
        <dbReference type="PROSITE-ProRule" id="PRU01270"/>
    </source>
</evidence>
<evidence type="ECO:0000269" key="5">
    <source>
    </source>
</evidence>
<evidence type="ECO:0000269" key="6">
    <source>
    </source>
</evidence>
<evidence type="ECO:0000269" key="7">
    <source>
    </source>
</evidence>
<evidence type="ECO:0000269" key="8">
    <source>
    </source>
</evidence>
<evidence type="ECO:0000269" key="9">
    <source>
    </source>
</evidence>
<evidence type="ECO:0000269" key="10">
    <source>
    </source>
</evidence>
<evidence type="ECO:0000269" key="11">
    <source>
    </source>
</evidence>
<evidence type="ECO:0000269" key="12">
    <source>
    </source>
</evidence>
<evidence type="ECO:0000269" key="13">
    <source>
    </source>
</evidence>
<evidence type="ECO:0000269" key="14">
    <source>
    </source>
</evidence>
<evidence type="ECO:0000269" key="15">
    <source>
    </source>
</evidence>
<evidence type="ECO:0000269" key="16">
    <source>
    </source>
</evidence>
<evidence type="ECO:0000269" key="17">
    <source>
    </source>
</evidence>
<evidence type="ECO:0000269" key="18">
    <source>
    </source>
</evidence>
<evidence type="ECO:0000269" key="19">
    <source>
    </source>
</evidence>
<evidence type="ECO:0000269" key="20">
    <source>
    </source>
</evidence>
<evidence type="ECO:0000269" key="21">
    <source>
    </source>
</evidence>
<evidence type="ECO:0000269" key="22">
    <source>
    </source>
</evidence>
<evidence type="ECO:0000269" key="23">
    <source>
    </source>
</evidence>
<evidence type="ECO:0000269" key="24">
    <source>
    </source>
</evidence>
<evidence type="ECO:0000269" key="25">
    <source>
    </source>
</evidence>
<evidence type="ECO:0000269" key="26">
    <source>
    </source>
</evidence>
<evidence type="ECO:0000269" key="27">
    <source>
    </source>
</evidence>
<evidence type="ECO:0000269" key="28">
    <source>
    </source>
</evidence>
<evidence type="ECO:0000269" key="29">
    <source>
    </source>
</evidence>
<evidence type="ECO:0000269" key="30">
    <source>
    </source>
</evidence>
<evidence type="ECO:0000269" key="31">
    <source>
    </source>
</evidence>
<evidence type="ECO:0000269" key="32">
    <source>
    </source>
</evidence>
<evidence type="ECO:0000269" key="33">
    <source>
    </source>
</evidence>
<evidence type="ECO:0000269" key="34">
    <source>
    </source>
</evidence>
<evidence type="ECO:0000269" key="35">
    <source>
    </source>
</evidence>
<evidence type="ECO:0000269" key="36">
    <source>
    </source>
</evidence>
<evidence type="ECO:0000269" key="37">
    <source>
    </source>
</evidence>
<evidence type="ECO:0000269" key="38">
    <source>
    </source>
</evidence>
<evidence type="ECO:0000269" key="39">
    <source>
    </source>
</evidence>
<evidence type="ECO:0000269" key="40">
    <source>
    </source>
</evidence>
<evidence type="ECO:0000269" key="41">
    <source>
    </source>
</evidence>
<evidence type="ECO:0000269" key="42">
    <source>
    </source>
</evidence>
<evidence type="ECO:0000269" key="43">
    <source>
    </source>
</evidence>
<evidence type="ECO:0000269" key="44">
    <source>
    </source>
</evidence>
<evidence type="ECO:0000269" key="45">
    <source>
    </source>
</evidence>
<evidence type="ECO:0000269" key="46">
    <source>
    </source>
</evidence>
<evidence type="ECO:0000269" key="47">
    <source>
    </source>
</evidence>
<evidence type="ECO:0000269" key="48">
    <source>
    </source>
</evidence>
<evidence type="ECO:0000303" key="49">
    <source>
    </source>
</evidence>
<evidence type="ECO:0000303" key="50">
    <source>
    </source>
</evidence>
<evidence type="ECO:0000305" key="51"/>
<evidence type="ECO:0000305" key="52">
    <source>
    </source>
</evidence>
<evidence type="ECO:0000305" key="53">
    <source>
    </source>
</evidence>
<evidence type="ECO:0000305" key="54">
    <source>
    </source>
</evidence>
<evidence type="ECO:0000305" key="55">
    <source>
    </source>
</evidence>
<evidence type="ECO:0000305" key="56">
    <source>
    </source>
</evidence>
<evidence type="ECO:0000305" key="57">
    <source>
    </source>
</evidence>
<evidence type="ECO:0000305" key="58">
    <source>
    </source>
</evidence>
<evidence type="ECO:0000305" key="59">
    <source>
    </source>
</evidence>
<evidence type="ECO:0000305" key="60">
    <source>
    </source>
</evidence>
<evidence type="ECO:0000305" key="61">
    <source>
    </source>
</evidence>
<evidence type="ECO:0000305" key="62">
    <source>
    </source>
</evidence>
<evidence type="ECO:0000305" key="63">
    <source>
    </source>
</evidence>
<evidence type="ECO:0007744" key="64">
    <source>
        <dbReference type="PDB" id="6M17"/>
    </source>
</evidence>
<evidence type="ECO:0007744" key="65">
    <source>
        <dbReference type="PDB" id="6VSB"/>
    </source>
</evidence>
<evidence type="ECO:0007744" key="66">
    <source>
        <dbReference type="PDB" id="6VXX"/>
    </source>
</evidence>
<evidence type="ECO:0007744" key="67">
    <source>
        <dbReference type="PDB" id="6VYB"/>
    </source>
</evidence>
<evidence type="ECO:0007829" key="68">
    <source>
        <dbReference type="PDB" id="6M1V"/>
    </source>
</evidence>
<evidence type="ECO:0007829" key="69">
    <source>
        <dbReference type="PDB" id="7B62"/>
    </source>
</evidence>
<evidence type="ECO:0007829" key="70">
    <source>
        <dbReference type="PDB" id="7C2L"/>
    </source>
</evidence>
<evidence type="ECO:0007829" key="71">
    <source>
        <dbReference type="PDB" id="7CN4"/>
    </source>
</evidence>
<evidence type="ECO:0007829" key="72">
    <source>
        <dbReference type="PDB" id="7D2Z"/>
    </source>
</evidence>
<evidence type="ECO:0007829" key="73">
    <source>
        <dbReference type="PDB" id="7EDF"/>
    </source>
</evidence>
<evidence type="ECO:0007829" key="74">
    <source>
        <dbReference type="PDB" id="7EK6"/>
    </source>
</evidence>
<evidence type="ECO:0007829" key="75">
    <source>
        <dbReference type="PDB" id="7K9H"/>
    </source>
</evidence>
<evidence type="ECO:0007829" key="76">
    <source>
        <dbReference type="PDB" id="7KQE"/>
    </source>
</evidence>
<evidence type="ECO:0007829" key="77">
    <source>
        <dbReference type="PDB" id="7LD1"/>
    </source>
</evidence>
<evidence type="ECO:0007829" key="78">
    <source>
        <dbReference type="PDB" id="7LXY"/>
    </source>
</evidence>
<evidence type="ECO:0007829" key="79">
    <source>
        <dbReference type="PDB" id="7M53"/>
    </source>
</evidence>
<evidence type="ECO:0007829" key="80">
    <source>
        <dbReference type="PDB" id="7MSQ"/>
    </source>
</evidence>
<evidence type="ECO:0007829" key="81">
    <source>
        <dbReference type="PDB" id="7MZK"/>
    </source>
</evidence>
<evidence type="ECO:0007829" key="82">
    <source>
        <dbReference type="PDB" id="7N0G"/>
    </source>
</evidence>
<evidence type="ECO:0007829" key="83">
    <source>
        <dbReference type="PDB" id="7OLZ"/>
    </source>
</evidence>
<evidence type="ECO:0007829" key="84">
    <source>
        <dbReference type="PDB" id="7P5Q"/>
    </source>
</evidence>
<evidence type="ECO:0007829" key="85">
    <source>
        <dbReference type="PDB" id="7QUR"/>
    </source>
</evidence>
<evidence type="ECO:0007829" key="86">
    <source>
        <dbReference type="PDB" id="7QUS"/>
    </source>
</evidence>
<evidence type="ECO:0007829" key="87">
    <source>
        <dbReference type="PDB" id="7R6W"/>
    </source>
</evidence>
<evidence type="ECO:0007829" key="88">
    <source>
        <dbReference type="PDB" id="7RU1"/>
    </source>
</evidence>
<evidence type="ECO:0007829" key="89">
    <source>
        <dbReference type="PDB" id="7RU2"/>
    </source>
</evidence>
<evidence type="ECO:0007829" key="90">
    <source>
        <dbReference type="PDB" id="7T5O"/>
    </source>
</evidence>
<evidence type="ECO:0007829" key="91">
    <source>
        <dbReference type="PDB" id="7TLC"/>
    </source>
</evidence>
<evidence type="ECO:0007829" key="92">
    <source>
        <dbReference type="PDB" id="7TOW"/>
    </source>
</evidence>
<evidence type="ECO:0007829" key="93">
    <source>
        <dbReference type="PDB" id="7TPI"/>
    </source>
</evidence>
<evidence type="ECO:0007829" key="94">
    <source>
        <dbReference type="PDB" id="7TPR"/>
    </source>
</evidence>
<evidence type="ECO:0007829" key="95">
    <source>
        <dbReference type="PDB" id="7V20"/>
    </source>
</evidence>
<evidence type="ECO:0007829" key="96">
    <source>
        <dbReference type="PDB" id="7VHM"/>
    </source>
</evidence>
<evidence type="ECO:0007829" key="97">
    <source>
        <dbReference type="PDB" id="7WK2"/>
    </source>
</evidence>
<evidence type="ECO:0007829" key="98">
    <source>
        <dbReference type="PDB" id="7WNB"/>
    </source>
</evidence>
<evidence type="ECO:0007829" key="99">
    <source>
        <dbReference type="PDB" id="7XD2"/>
    </source>
</evidence>
<evidence type="ECO:0007829" key="100">
    <source>
        <dbReference type="PDB" id="7YCN"/>
    </source>
</evidence>
<evidence type="ECO:0007829" key="101">
    <source>
        <dbReference type="PDB" id="7Z8O"/>
    </source>
</evidence>
<evidence type="ECO:0007829" key="102">
    <source>
        <dbReference type="PDB" id="7ZR2"/>
    </source>
</evidence>
<evidence type="ECO:0007829" key="103">
    <source>
        <dbReference type="PDB" id="8A94"/>
    </source>
</evidence>
<evidence type="ECO:0007829" key="104">
    <source>
        <dbReference type="PDB" id="8A99"/>
    </source>
</evidence>
<evidence type="ECO:0007829" key="105">
    <source>
        <dbReference type="PDB" id="8C2R"/>
    </source>
</evidence>
<evidence type="ECO:0007829" key="106">
    <source>
        <dbReference type="PDB" id="8CWU"/>
    </source>
</evidence>
<evidence type="ECO:0007829" key="107">
    <source>
        <dbReference type="PDB" id="8CXQ"/>
    </source>
</evidence>
<evidence type="ECO:0007829" key="108">
    <source>
        <dbReference type="PDB" id="8CY7"/>
    </source>
</evidence>
<evidence type="ECO:0007829" key="109">
    <source>
        <dbReference type="PDB" id="8DLO"/>
    </source>
</evidence>
<evidence type="ECO:0007829" key="110">
    <source>
        <dbReference type="PDB" id="8DLW"/>
    </source>
</evidence>
<evidence type="ECO:0007829" key="111">
    <source>
        <dbReference type="PDB" id="8DM3"/>
    </source>
</evidence>
<evidence type="ECO:0007829" key="112">
    <source>
        <dbReference type="PDB" id="8DTT"/>
    </source>
</evidence>
<evidence type="ECO:0007829" key="113">
    <source>
        <dbReference type="PDB" id="8FDW"/>
    </source>
</evidence>
<evidence type="ECO:0007829" key="114">
    <source>
        <dbReference type="PDB" id="8FHY"/>
    </source>
</evidence>
<evidence type="ECO:0007829" key="115">
    <source>
        <dbReference type="PDB" id="8G73"/>
    </source>
</evidence>
<evidence type="ECO:0007829" key="116">
    <source>
        <dbReference type="PDB" id="8G77"/>
    </source>
</evidence>
<evidence type="ECO:0007829" key="117">
    <source>
        <dbReference type="PDB" id="8H3E"/>
    </source>
</evidence>
<evidence type="ECO:0007829" key="118">
    <source>
        <dbReference type="PDB" id="8IOT"/>
    </source>
</evidence>
<evidence type="ECO:0007829" key="119">
    <source>
        <dbReference type="PDB" id="8JYM"/>
    </source>
</evidence>
<evidence type="ECO:0007829" key="120">
    <source>
        <dbReference type="PDB" id="8R1C"/>
    </source>
</evidence>
<evidence type="ECO:0007829" key="121">
    <source>
        <dbReference type="PDB" id="8R1D"/>
    </source>
</evidence>
<evidence type="ECO:0007829" key="122">
    <source>
        <dbReference type="PDB" id="8WMF"/>
    </source>
</evidence>
<evidence type="ECO:0007829" key="123">
    <source>
        <dbReference type="PDB" id="8X0Y"/>
    </source>
</evidence>
<evidence type="ECO:0007829" key="124">
    <source>
        <dbReference type="PDB" id="8XSI"/>
    </source>
</evidence>
<keyword id="KW-0002">3D-structure</keyword>
<keyword id="KW-0175">Coiled coil</keyword>
<keyword id="KW-1015">Disulfide bond</keyword>
<keyword id="KW-1170">Fusion of virus membrane with host endosomal membrane</keyword>
<keyword id="KW-1168">Fusion of virus membrane with host membrane</keyword>
<keyword id="KW-0325">Glycoprotein</keyword>
<keyword id="KW-1032">Host cell membrane</keyword>
<keyword id="KW-1043">Host membrane</keyword>
<keyword id="KW-0945">Host-virus interaction</keyword>
<keyword id="KW-1090">Inhibition of host innate immune response by virus</keyword>
<keyword id="KW-1084">Inhibition of host tetherin by virus</keyword>
<keyword id="KW-0449">Lipoprotein</keyword>
<keyword id="KW-0472">Membrane</keyword>
<keyword id="KW-0564">Palmitate</keyword>
<keyword id="KW-1185">Reference proteome</keyword>
<keyword id="KW-0732">Signal</keyword>
<keyword id="KW-0766">Superantigen</keyword>
<keyword id="KW-0812">Transmembrane</keyword>
<keyword id="KW-1133">Transmembrane helix</keyword>
<keyword id="KW-1161">Viral attachment to host cell</keyword>
<keyword id="KW-0261">Viral envelope protein</keyword>
<keyword id="KW-0899">Viral immunoevasion</keyword>
<keyword id="KW-1162">Viral penetration into host cytoplasm</keyword>
<keyword id="KW-0946">Virion</keyword>
<keyword id="KW-0843">Virulence</keyword>
<keyword id="KW-1160">Virus entry into host cell</keyword>
<comment type="function">
    <molecule>Spike protein S1</molecule>
    <text evidence="2 5 7 8 9 20 23 24 42 44 46 50 62">Attaches the virion to the cell membrane by interacting with host receptor, initiating the infection. The major receptor is host ACE2 (PubMed:32142651, PubMed:32155444, PubMed:33607086). When S2/S2' has been cleaved, binding to the receptor triggers direct fusion at the cell membrane (PubMed:34561887). When S2/S2' has not been cleaved, binding to the receptor results in internalization of the virus by endocytosis using host TFRC and GRM2 and leading to fusion of the virion membrane with the host endosomal membrane (PubMed:32075877, PubMed:32221306, PubMed:34903715, PubMed:36779763). Alternatively, may use NRP1/NRP2 (PubMed:33082294, PubMed:33082293) and integrin as entry receptors (PubMed:35150743). The use of NRP1/NRP2 receptors may explain the tropism of the virus in human olfactory epithelial cells, which express these molecules at high levels but ACE2 at low levels (PubMed:33082293). The stalk domain of S contains three hinges, giving the head unexpected orientational freedom (PubMed:32817270).</text>
</comment>
<comment type="function">
    <molecule>Spike protein S2</molecule>
    <text evidence="2 17 34 62">Precursor of the fusion protein processed in the biosynthesis of the S protein and the formation of virus particle. Mediates fusion of the virion and cellular membranes by functioning as a class I viral fusion protein. Contains two viral fusion peptides that are unmasked after cleavage. The S2/S2' cleavage occurs during virus entry at the cell membrane by host TMPRSS2 (PubMed:32142651) or during endocytosis by host CSTL (PubMed:32703818, PubMed:34159616). In either case, this triggers an extensive and irreversible conformational change leading to fusion of the viral envelope with the cellular cytoplasmic membrane, releasing viral genomic RNA into the host cell cytoplasm (PubMed:34561887). Under the current model, the protein has at least three conformational states: pre-fusion native state, pre-hairpin intermediate state, and post-fusion hairpin state. During fusion of the viral and target cell membranes, the coiled coil regions (heptad repeats) adopt a trimer-of-hairpins structure and position the fusion peptide in close proximity to the C-terminal region of the ectodomain. Formation of this structure appears to promote apposition and subsequent fusion of viral and target cell membranes.</text>
</comment>
<comment type="function">
    <molecule>Spike protein S2'</molecule>
    <text evidence="2 17 34 62">Subunit of the fusion protein that is processed upon entry into the host cell. Mediates fusion of the virion and cellular membranes by functioning as a class I viral fusion protein. Contains a viral fusion peptide that is unmasked after S2 cleavage. This cleavage can occur at the cell membrane by host TMPRSS2 or during endocytosis by host CSTL (PubMed:32703818, PubMed:34159616). In either case, this triggers an extensive and irreversible conformational change that leads to fusion of the viral envelope with the cellular cytoplasmic membrane, releasing viral genomic RNA into the host cell cytoplasm (PubMed:34561887). Under the current model, the protein has at least three conformational states: pre-fusion native state, pre-hairpin intermediate state, and post-fusion hairpin state. During fusion of the viral and target cell membranes, the coiled coil regions (heptad repeats) adopt a trimer-of-hairpins structure and position the fusion peptide in close proximity to the C-terminal region of the ectodomain. Formation of this structure appears to promote apposition and subsequent fusion of viral and target cell membranes.</text>
</comment>
<comment type="subunit">
    <molecule>Spike glycoprotein</molecule>
    <text evidence="2 5 8 12 22 42 43">Homotrimer; each monomer consists of a S1 and a S2 subunit (PubMed:32075877, PubMed:32155444, PubMed:32245784). The resulting peplomers protrude from the virus surface as spikes (PubMed:32979942). Interacts with ORF3a protein and ORF7a protein (By similarity) (PubMed:32075877, PubMed:32155444, PubMed:32245784, PubMed:32979942). There are an average of 26 +/-15 spike trimers at the surface of virion particles (PubMed:32979942). Binds to host MBL2 (PubMed:35102342). This binding occurs via glycans and inhibits viral infectivity. Inhibition is effective against alpha, beta, gamma, and delta variants (PubMed:35102342). Interacts with host TFRC; this interaction plays a role in virus internalization (PubMed:36779763). Interacts with host GRM2; this interaction plays a role in virus internalization (PubMed:34903715).</text>
</comment>
<comment type="subunit">
    <molecule>Spike protein S1</molecule>
    <text evidence="5 6 8 9 10 11 23 24 25 28 31 33 45">Binds to host ACE2 (PubMed:32075877, PubMed:32132184, PubMed:32155444, PubMed:32221306, PubMed:32225175, PubMed:32225176, PubMed:33607086). RBD also interacts with the N-linked glycan on 'Asn-90' of ACE2 (PubMed:33607086). Cleavage of S generates a polybasic C-terminal sequence on S1 that binds to host Neuropilin-1 (NRP1) and Neuropilin-2 (NRP2) receptors (PubMed:33082293, PubMed:33082294). Interacts with host integrin alpha-5/beta-1 (ITGA5:ITGB1) and with ACE2 in complex with integrin alpha-5/beta-1 (ITGA5:ITGB1) (PubMed:33102950). May interact via cytoplasmic c-terminus with M protein (PubMed:33229438). May interact (via N-terminus) with host bilirubin and biliverdin, thereby preventing antibody binding to the SARS-CoV-2 spike NTD via an allosteric mechanism (PubMed:33888467). May interact with host LRRC15, thereby allowing attachment to host cells (PubMed:36735681).</text>
</comment>
<comment type="interaction">
    <interactant intactId="EBI-25474821">
        <id>P0DTC2</id>
    </interactant>
    <interactant intactId="EBI-25474821">
        <id>P0DTC2</id>
        <label>S</label>
    </interactant>
    <organismsDiffer>false</organismsDiffer>
    <experiments>60</experiments>
</comment>
<comment type="interaction">
    <interactant intactId="EBI-25474821">
        <id>P0DTC2</id>
    </interactant>
    <interactant intactId="EBI-26998936">
        <id>A0A1S3APE5</id>
        <label>ACE2</label>
    </interactant>
    <organismsDiffer>true</organismsDiffer>
    <experiments>2</experiments>
</comment>
<comment type="interaction">
    <interactant intactId="EBI-25474821">
        <id>P0DTC2</id>
    </interactant>
    <interactant intactId="EBI-26998885">
        <id>E2DHI3</id>
        <label>ACE2</label>
    </interactant>
    <organismsDiffer>true</organismsDiffer>
    <experiments>2</experiments>
</comment>
<comment type="interaction">
    <interactant intactId="EBI-25474821">
        <id>P0DTC2</id>
    </interactant>
    <interactant intactId="EBI-26998567">
        <id>Q58DD0</id>
        <label>ACE2</label>
    </interactant>
    <organismsDiffer>true</organismsDiffer>
    <experiments>3</experiments>
</comment>
<comment type="interaction">
    <interactant intactId="EBI-25474821">
        <id>P0DTC2</id>
    </interactant>
    <interactant intactId="EBI-25503774">
        <id>Q5EGZ1</id>
        <label>Ace2</label>
    </interactant>
    <organismsDiffer>true</organismsDiffer>
    <experiments>2</experiments>
</comment>
<comment type="interaction">
    <interactant intactId="EBI-25474821">
        <id>P0DTC2</id>
    </interactant>
    <interactant intactId="EBI-8365920">
        <id>Q8R0I0</id>
        <label>Ace2</label>
    </interactant>
    <organismsDiffer>true</organismsDiffer>
    <experiments>4</experiments>
</comment>
<comment type="interaction">
    <interactant intactId="EBI-25474821">
        <id>P0DTC2</id>
    </interactant>
    <interactant intactId="EBI-7730807">
        <id>Q9BYF1</id>
        <label>ACE2</label>
    </interactant>
    <organismsDiffer>true</organismsDiffer>
    <experiments>242</experiments>
</comment>
<comment type="interaction">
    <interactant intactId="EBI-25474821">
        <id>P0DTC2</id>
    </interactant>
    <interactant intactId="EBI-2850927">
        <id>P30530</id>
        <label>AXL</label>
    </interactant>
    <organismsDiffer>true</organismsDiffer>
    <experiments>9</experiments>
</comment>
<comment type="interaction">
    <interactant intactId="EBI-25474821">
        <id>P0DTC2</id>
    </interactant>
    <interactant intactId="EBI-750709">
        <id>P35613</id>
        <label>BSG</label>
    </interactant>
    <organismsDiffer>true</organismsDiffer>
    <experiments>7</experiments>
</comment>
<comment type="interaction">
    <interactant intactId="EBI-25474821">
        <id>P0DTC2</id>
    </interactant>
    <interactant intactId="EBI-14032968">
        <id>PRO_0000018590</id>
        <label>C1QBP</label>
        <dbReference type="UniProtKB" id="Q07021"/>
    </interactant>
    <organismsDiffer>true</organismsDiffer>
    <experiments>2</experiments>
</comment>
<comment type="interaction">
    <interactant intactId="EBI-25474821">
        <id>P0DTC2</id>
    </interactant>
    <interactant intactId="EBI-9257341">
        <id>Q9NNX6</id>
        <label>CD209</label>
    </interactant>
    <organismsDiffer>true</organismsDiffer>
    <experiments>11</experiments>
</comment>
<comment type="interaction">
    <interactant intactId="EBI-25474821">
        <id>P0DTC2</id>
    </interactant>
    <interactant intactId="EBI-2873246">
        <id>Q8IUN9</id>
        <label>CLEC10A</label>
    </interactant>
    <organismsDiffer>true</organismsDiffer>
    <experiments>3</experiments>
</comment>
<comment type="interaction">
    <interactant intactId="EBI-25474821">
        <id>P0DTC2</id>
    </interactant>
    <interactant intactId="EBI-25776912">
        <id>Q8IUN9-2</id>
        <label>CLEC10A</label>
    </interactant>
    <organismsDiffer>true</organismsDiffer>
    <experiments>4</experiments>
</comment>
<comment type="interaction">
    <interactant intactId="EBI-25474821">
        <id>P0DTC2</id>
    </interactant>
    <interactant intactId="EBI-1391211">
        <id>Q9H2X3</id>
        <label>CLEC4M</label>
    </interactant>
    <organismsDiffer>true</organismsDiffer>
    <experiments>12</experiments>
</comment>
<comment type="interaction">
    <interactant intactId="EBI-25474821">
        <id>P0DTC2</id>
    </interactant>
    <interactant intactId="EBI-1056534">
        <id>P35606</id>
        <label>COPB2</label>
    </interactant>
    <organismsDiffer>true</organismsDiffer>
    <experiments>3</experiments>
</comment>
<comment type="interaction">
    <interactant intactId="EBI-25474821">
        <id>P0DTC2</id>
    </interactant>
    <interactant intactId="EBI-1220160">
        <id>P07711</id>
        <label>CTSL</label>
    </interactant>
    <organismsDiffer>true</organismsDiffer>
    <experiments>3</experiments>
</comment>
<comment type="interaction">
    <interactant intactId="EBI-25474821">
        <id>P0DTC2</id>
    </interactant>
    <interactant intactId="EBI-27090284">
        <id>PRO_0000006773</id>
        <label>DEFA1B</label>
        <dbReference type="UniProtKB" id="P59665"/>
    </interactant>
    <organismsDiffer>true</organismsDiffer>
    <experiments>3</experiments>
</comment>
<comment type="interaction">
    <interactant intactId="EBI-25474821">
        <id>P0DTC2</id>
    </interactant>
    <interactant intactId="EBI-297353">
        <id>P00533</id>
        <label>EGFR</label>
    </interactant>
    <organismsDiffer>true</organismsDiffer>
    <experiments>4</experiments>
</comment>
<comment type="interaction">
    <interactant intactId="EBI-25474821">
        <id>P0DTC2</id>
    </interactant>
    <interactant intactId="EBI-986345">
        <id>P08246</id>
        <label>ELANE</label>
    </interactant>
    <organismsDiffer>true</organismsDiffer>
    <experiments>2</experiments>
</comment>
<comment type="interaction">
    <interactant intactId="EBI-25474821">
        <id>P0DTC2</id>
    </interactant>
    <interactant intactId="EBI-1056807">
        <id>P09958</id>
        <label>FURIN</label>
    </interactant>
    <organismsDiffer>true</organismsDiffer>
    <experiments>5</experiments>
</comment>
<comment type="interaction">
    <interactant intactId="EBI-25474821">
        <id>P0DTC2</id>
    </interactant>
    <interactant intactId="EBI-4403685">
        <id>Q7Z5G4</id>
        <label>GOLGA7</label>
    </interactant>
    <organismsDiffer>true</organismsDiffer>
    <experiments>7</experiments>
</comment>
<comment type="interaction">
    <interactant intactId="EBI-25474821">
        <id>P0DTC2</id>
    </interactant>
    <interactant intactId="EBI-28956381">
        <id>A5CKE2</id>
        <label>GP1BA</label>
    </interactant>
    <organismsDiffer>true</organismsDiffer>
    <experiments>3</experiments>
</comment>
<comment type="interaction">
    <interactant intactId="EBI-25474821">
        <id>P0DTC2</id>
    </interactant>
    <interactant intactId="EBI-10232876">
        <id>Q14416</id>
        <label>GRM2</label>
    </interactant>
    <organismsDiffer>true</organismsDiffer>
    <experiments>4</experiments>
</comment>
<comment type="interaction">
    <interactant intactId="EBI-25474821">
        <id>P0DTC2</id>
    </interactant>
    <interactant intactId="EBI-953786">
        <id>Q96D42</id>
        <label>HAVCR1</label>
    </interactant>
    <organismsDiffer>true</organismsDiffer>
    <experiments>7</experiments>
</comment>
<comment type="interaction">
    <interactant intactId="EBI-25474821">
        <id>P0DTC2</id>
    </interactant>
    <interactant intactId="EBI-354921">
        <id>P11021</id>
        <label>HSPA5</label>
    </interactant>
    <organismsDiffer>true</organismsDiffer>
    <experiments>8</experiments>
</comment>
<comment type="interaction">
    <interactant intactId="EBI-25474821">
        <id>P0DTC2</id>
    </interactant>
    <interactant intactId="EBI-988319">
        <id>P01130</id>
        <label>LDLR</label>
    </interactant>
    <organismsDiffer>true</organismsDiffer>
    <experiments>4</experiments>
</comment>
<comment type="interaction">
    <interactant intactId="EBI-25474821">
        <id>P0DTC2</id>
    </interactant>
    <interactant intactId="EBI-1170392">
        <id>P17931</id>
        <label>LGALS3</label>
    </interactant>
    <organismsDiffer>true</organismsDiffer>
    <experiments>2</experiments>
</comment>
<comment type="interaction">
    <interactant intactId="EBI-25474821">
        <id>P0DTC2</id>
    </interactant>
    <interactant intactId="EBI-357504">
        <id>P47929</id>
        <label>LGALS7B</label>
    </interactant>
    <organismsDiffer>true</organismsDiffer>
    <experiments>2</experiments>
</comment>
<comment type="interaction">
    <interactant intactId="EBI-25474821">
        <id>P0DTC2</id>
    </interactant>
    <interactant intactId="EBI-740058">
        <id>O00214</id>
        <label>LGALS8</label>
    </interactant>
    <organismsDiffer>true</organismsDiffer>
    <experiments>2</experiments>
</comment>
<comment type="interaction">
    <interactant intactId="EBI-25474821">
        <id>P0DTC2</id>
    </interactant>
    <interactant intactId="EBI-25427940">
        <id>PRO_0000017401</id>
        <label>MBL2</label>
        <dbReference type="UniProtKB" id="P11226"/>
    </interactant>
    <organismsDiffer>true</organismsDiffer>
    <experiments>11</experiments>
</comment>
<comment type="interaction">
    <interactant intactId="EBI-25474821">
        <id>P0DTC2</id>
    </interactant>
    <interactant intactId="EBI-642509">
        <id>Q61830</id>
        <label>Mrc1</label>
    </interactant>
    <organismsDiffer>true</organismsDiffer>
    <experiments>2</experiments>
</comment>
<comment type="interaction">
    <interactant intactId="EBI-25474821">
        <id>P0DTC2</id>
    </interactant>
    <interactant intactId="EBI-528768">
        <id>P26038</id>
        <label>MSN</label>
    </interactant>
    <organismsDiffer>true</organismsDiffer>
    <experiments>20</experiments>
</comment>
<comment type="interaction">
    <interactant intactId="EBI-25474821">
        <id>P0DTC2</id>
    </interactant>
    <interactant intactId="EBI-350338">
        <id>P35579</id>
        <label>MYH9</label>
    </interactant>
    <organismsDiffer>true</organismsDiffer>
    <experiments>8</experiments>
</comment>
<comment type="interaction">
    <interactant intactId="EBI-25474821">
        <id>P0DTC2</id>
    </interactant>
    <interactant intactId="EBI-11980721">
        <id>P46934-3</id>
        <label>NEDD4</label>
    </interactant>
    <organismsDiffer>true</organismsDiffer>
    <experiments>2</experiments>
</comment>
<comment type="interaction">
    <interactant intactId="EBI-25474821">
        <id>P0DTC2</id>
    </interactant>
    <interactant intactId="EBI-1187100">
        <id>O14786</id>
        <label>NRP1</label>
    </interactant>
    <organismsDiffer>true</organismsDiffer>
    <experiments>9</experiments>
</comment>
<comment type="interaction">
    <interactant intactId="EBI-25474821">
        <id>P0DTC2</id>
    </interactant>
    <interactant intactId="EBI-11809981">
        <id>PRO_0000005068</id>
        <label>PF4</label>
        <dbReference type="UniProtKB" id="P02776"/>
    </interactant>
    <organismsDiffer>true</organismsDiffer>
    <experiments>3</experiments>
</comment>
<comment type="interaction">
    <interactant intactId="EBI-25474821">
        <id>P0DTC2</id>
    </interactant>
    <interactant intactId="EBI-3913237">
        <id>P31431</id>
        <label>SDC4</label>
    </interactant>
    <organismsDiffer>true</organismsDiffer>
    <experiments>17</experiments>
</comment>
<comment type="interaction">
    <interactant intactId="EBI-25474821">
        <id>P0DTC2</id>
    </interactant>
    <interactant intactId="EBI-81088">
        <id>Q15436</id>
        <label>SEC23A</label>
    </interactant>
    <organismsDiffer>true</organismsDiffer>
    <experiments>20</experiments>
</comment>
<comment type="interaction">
    <interactant intactId="EBI-25474821">
        <id>P0DTC2</id>
    </interactant>
    <interactant intactId="EBI-11316157">
        <id>P35247</id>
        <label>SFTPD</label>
    </interactant>
    <organismsDiffer>true</organismsDiffer>
    <experiments>3</experiments>
</comment>
<comment type="interaction">
    <interactant intactId="EBI-25474821">
        <id>P0DTC2</id>
    </interactant>
    <interactant intactId="EBI-27021977">
        <id>PRO_0000017465</id>
        <label>SFTPD</label>
        <dbReference type="UniProtKB" id="P35247"/>
    </interactant>
    <organismsDiffer>true</organismsDiffer>
    <experiments>11</experiments>
</comment>
<comment type="interaction">
    <interactant intactId="EBI-25474821">
        <id>P0DTC2</id>
    </interactant>
    <interactant intactId="EBI-2514865">
        <id>Q96L92</id>
        <label>SNX27</label>
    </interactant>
    <organismsDiffer>true</organismsDiffer>
    <experiments>16</experiments>
</comment>
<comment type="interaction">
    <interactant intactId="EBI-25474821">
        <id>P0DTC2</id>
    </interactant>
    <interactant intactId="EBI-1043352">
        <id>Q15005</id>
        <label>SPCS2</label>
    </interactant>
    <organismsDiffer>true</organismsDiffer>
    <experiments>2</experiments>
</comment>
<comment type="interaction">
    <interactant intactId="EBI-25474821">
        <id>P0DTC2</id>
    </interactant>
    <interactant intactId="EBI-1057697">
        <id>P42224</id>
        <label>STAT1</label>
    </interactant>
    <organismsDiffer>true</organismsDiffer>
    <experiments>2</experiments>
</comment>
<comment type="interaction">
    <interactant intactId="EBI-25474821">
        <id>P0DTC2</id>
    </interactant>
    <interactant intactId="EBI-27029641">
        <id>Q5EA32</id>
        <label>TRPV2</label>
    </interactant>
    <organismsDiffer>true</organismsDiffer>
    <experiments>3</experiments>
</comment>
<comment type="interaction">
    <interactant intactId="EBI-25474821">
        <id>P0DTC2</id>
    </interactant>
    <interactant intactId="EBI-11721896">
        <id>Q9Y5S1</id>
        <label>TRPV2</label>
    </interactant>
    <organismsDiffer>true</organismsDiffer>
    <experiments>2</experiments>
</comment>
<comment type="interaction">
    <interactant intactId="EBI-25474821">
        <id>P0DTC2</id>
    </interactant>
    <interactant intactId="EBI-353844">
        <id>P08670</id>
        <label>VIM</label>
    </interactant>
    <organismsDiffer>true</organismsDiffer>
    <experiments>4</experiments>
</comment>
<comment type="interaction">
    <interactant intactId="EBI-25474821">
        <id>P0DTC2</id>
    </interactant>
    <interactant intactId="EBI-2819021">
        <id>Q5MNZ6</id>
        <label>WDR45B</label>
    </interactant>
    <organismsDiffer>true</organismsDiffer>
    <experiments>4</experiments>
</comment>
<comment type="interaction">
    <interactant intactId="EBI-25474821">
        <id>P0DTC2</id>
    </interactant>
    <interactant intactId="EBI-2799626">
        <id>Q9C0B5</id>
        <label>ZDHHC5</label>
    </interactant>
    <organismsDiffer>true</organismsDiffer>
    <experiments>8</experiments>
</comment>
<comment type="interaction">
    <interactant intactId="EBI-25490323">
        <id>PRO_0000449647</id>
    </interactant>
    <interactant intactId="EBI-7730807">
        <id>Q9BYF1</id>
        <label>ACE2</label>
    </interactant>
    <organismsDiffer>true</organismsDiffer>
    <experiments>2</experiments>
</comment>
<comment type="interaction">
    <interactant intactId="EBI-25490323">
        <id>PRO_0000449647</id>
    </interactant>
    <interactant intactId="EBI-821758">
        <id>PRO_0000000092</id>
        <label>APP</label>
        <dbReference type="UniProtKB" id="P05067"/>
    </interactant>
    <organismsDiffer>true</organismsDiffer>
    <experiments>3</experiments>
</comment>
<comment type="subcellular location">
    <subcellularLocation>
        <location evidence="2 22">Virion membrane</location>
        <topology evidence="2 39">Single-pass type I membrane protein</topology>
    </subcellularLocation>
    <subcellularLocation>
        <location evidence="2 39">Host endoplasmic reticulum-Golgi intermediate compartment membrane</location>
        <topology evidence="2">Single-pass type I membrane protein</topology>
    </subcellularLocation>
    <subcellularLocation>
        <location evidence="2 39">Host cell membrane</location>
        <topology evidence="2">Single-pass type I membrane protein</topology>
    </subcellularLocation>
    <text evidence="2 22 39">Accumulates in the endoplasmic reticulum-Golgi intermediate compartment, where it participates in virus particle assembly. Some S oligomers are transported to the host plasma membrane, where they may mediate cell-cell fusion (PubMed:34504087). An average of 26 +/-15 S trimers are found randomly distributed at the surface of the virion (PubMed:32979942).</text>
</comment>
<comment type="domain">
    <text evidence="49">Contains sequence and structural motifs very similar to those of a bacterial superantigen and can directly bind and activate T-cell receptors. Activation of a broad T-cell repertoire may be involved in the hyperinflammatory syndrome in acute COVID disease.</text>
</comment>
<comment type="domain">
    <text evidence="1">The KxHxx motif seems to function as an ER retrieval and binds COPI in vitro.</text>
</comment>
<comment type="domain">
    <text evidence="2 62">Fusion peptide 1 (FP1) and fusion peptide 2 (FP2) function cooperatively and have a membrane-ordering effect on lipid headgroups and shallow hydrophobic regions of target bilayers. They are considered as two domains of an extended, bipartite FP. The membrane-ordering activity is calcium-dependent and also dependent on correct folding, which is maintained by an internal disulfide bond in FP2.</text>
</comment>
<comment type="PTM">
    <text evidence="40">The cytoplasmic Cys-rich domain is palmitoylated. Palmitoylated spike proteins drive the formation of localized ordered cholesterol and sphingo-lipid-rich lipid nanodomains in the early Golgi, where viral budding occurs.</text>
</comment>
<comment type="PTM">
    <text evidence="2 7 8 9 13 17 29 30 34 62">Specific enzymatic cleavages in vivo yield mature proteins. The precursor is processed into S1 and S2 by host furin or unknown proteases to yield the mature S1 and S2 proteins (PubMed:32155444, PubMed:32362314, PubMed:32703818, PubMed:34159616, PubMed:34561887). Processing between S2 and S2' occurs either by host CTSL in endosomes (PubMed:32221306, PubMed:33465165, PubMed:34159616), or by host TMPRSS2 at the cell surface (PubMed:32142651). Both cleavages are necessary for the protein to be fusion competent (PubMed:32703818, PubMed:34159616, PubMed:34561887). Cell surface activation allows the virus to enter the cell despite inhibition of the endosomal pathway by hydroxychloroquine (PubMed:33465165). The polybasic furin cleavage site is absent in SARS-CoV S (PubMed:32155444, PubMed:32362314, PubMed:33465165). It increases the dependence on TMPRSS2 expression by SARS-CoV-2 (PubMed:33465165). D614G substitution would enhance furin cleavage at the S1/S2 junction (PubMed:33417835).</text>
</comment>
<comment type="PTM">
    <text evidence="5 8 14 15 21">Highly decorated by heterogeneous N-linked glycans protruding from the trimer surface (PubMed:32075877, PubMed:32155444, PubMed:32929138). Highly glycosylated by host both on S1 and S2 subunits, occluding many regions across the surface of the protein (PubMed:32363391, PubMed:32366695, PubMed:32929138). Approximately 40% of the protein surface is shielded from antibody recognition by glycans, with the notable exception of the ACE2 receptor binding domain (PubMed:32929138).</text>
</comment>
<comment type="PTM">
    <text evidence="41">O-glycosylated by host GALNT1 at the end of S1. This could reduce the efficiency of S1/S2 cleavage.</text>
</comment>
<comment type="polymorphism">
    <text evidence="57 60">Variant Alpha/B.1.1.7 belongs to a lineage isolated first in United Kingdom (December 2020). It is also called Variant of Concern (VOC) 202012/01, Variant Under Investigation (VUI) 202012/01, 501Y.V1 or 20B/501Y.V1 (PubMed:33413740). It has an estimated 25% increase of transmissibility (PubMed:34142653).</text>
</comment>
<comment type="polymorphism">
    <text evidence="60">Variant Beta/B.1.351 belongs to a lineage first isolated in South Africa (December 2020) and is also called 501Y.V2. It has an estimated 25% increase of transmissibility.</text>
</comment>
<comment type="polymorphism">
    <text evidence="60">Variant Gamma/P.1 belongs to a lineage first isolated in Brazil (November 2020) and is also called 20J (V3) and GR/501Y.V3. It has an estimated 38% increase of transmissibility.</text>
</comment>
<comment type="polymorphism">
    <text evidence="60">Variant Delta/B.1.617.2 belongs to a lineage first isolated in India (October 2020) and is also called G/478K.V1. It has an estimated 97% increase of transmissibility.</text>
</comment>
<comment type="polymorphism">
    <text evidence="37">Variant Epsilon/B.1.427/B.1.429 belong to lineages first isolated in USA (Sept 2020). Variant S13I shifts the signal peptide cleavage site from S13-Q14 to C15-V16, thus removing Cys-15 which can no longer establish disulfide bonds with Cys-136. The latter would make a disulfid bond with Cys-152 (W152C variant), thereby changing the N-terminus structure of the protein and its antigenicity.</text>
</comment>
<comment type="polymorphism">
    <text evidence="51">Variant Omicron/BA.1 belongs to a lineage first isolated in South Africa (November 2021).</text>
</comment>
<comment type="polymorphism">
    <text evidence="51">Variant Omicron/BQ.1.1 belongs to a lineage first isolated in Nigeria (November 2022).</text>
</comment>
<comment type="polymorphism">
    <text evidence="51">Variant Omicron/XBB.1.5 belongs to a lineage first isolated in United States (November 2022). It is the result of recombination between omicron BJ.1 and BM.1.1. Moreover XBB.1.5 do not express ORF8.</text>
</comment>
<comment type="biotechnology">
    <text evidence="61">Main component of the anti-COVID19 vaccines BNT162b2/Pfizer-Biontech and mRNA-1273/Moderna; in which the mutations of Lys-986 (K986P) and Val-987 (V987P) have been added to stabilize the protein in the prefusion state.</text>
</comment>
<comment type="biotechnology">
    <text evidence="61">Main component of the anti-COVID19 vaccine Ad26.COV2.S/Janssen Pharmaceutical; in which the mutations Arg-682 (R682S), Arg-685 (R685G), Lys-986 (K986P) and Val-987 (V987P) have been added to stabilize the protein in the prefusion state.</text>
</comment>
<comment type="biotechnology">
    <text evidence="61">Main component of the anti-COVID vaccine Chadox1/AZD1222/AstraZeneca; in which the human tPA leader sequence is added in N-terminus to enhance protein secretion.</text>
</comment>
<comment type="miscellaneous">
    <text evidence="16 26 27">Variant D614G has become the most prevalent circulating sequence in the global pandemic since April 2020 (PubMed:32697968). The mutation is associated with higher viral loads produced in cell culture and animal models (PubMed:32697968, PubMed:33106671, PubMed:33184236). It would not change pathogenicity nor neutralization properties vs vaccination (PubMed:33184236). May be prevalent because the mutation increases virus transmission in human population (PubMed:33106671).</text>
</comment>
<comment type="similarity">
    <text evidence="2">Belongs to the betacoronaviruses spike protein family.</text>
</comment>
<comment type="caution">
    <text evidence="14">Asn-17, Asn-603, Asn-1134, Asn-1158, and Asn-1173 are not glycosylated when S1 or S2 are expressed individually in HEK293 cells.</text>
</comment>
<proteinExistence type="evidence at protein level"/>
<sequence>MFVFLVLLPLVSSQCVNLTTRTQLPPAYTNSFTRGVYYPDKVFRSSVLHSTQDLFLPFFSNVTWFHAIHVSGTNGTKRFDNPVLPFNDGVYFASTEKSNIIRGWIFGTTLDSKTQSLLIVNNATNVVIKVCEFQFCNDPFLGVYYHKNNKSWMESEFRVYSSANNCTFEYVSQPFLMDLEGKQGNFKNLREFVFKNIDGYFKIYSKHTPINLVRDLPQGFSALEPLVDLPIGINITRFQTLLALHRSYLTPGDSSSGWTAGAAAYYVGYLQPRTFLLKYNENGTITDAVDCALDPLSETKCTLKSFTVEKGIYQTSNFRVQPTESIVRFPNITNLCPFGEVFNATRFASVYAWNRKRISNCVADYSVLYNSASFSTFKCYGVSPTKLNDLCFTNVYADSFVIRGDEVRQIAPGQTGKIADYNYKLPDDFTGCVIAWNSNNLDSKVGGNYNYLYRLFRKSNLKPFERDISTEIYQAGSTPCNGVEGFNCYFPLQSYGFQPTNGVGYQPYRVVVLSFELLHAPATVCGPKKSTNLVKNKCVNFNFNGLTGTGVLTESNKKFLPFQQFGRDIADTTDAVRDPQTLEILDITPCSFGGVSVITPGTNTSNQVAVLYQDVNCTEVPVAIHADQLTPTWRVYSTGSNVFQTRAGCLIGAEHVNNSYECDIPIGAGICASYQTQTNSPRRARSVASQSIIAYTMSLGAENSVAYSNNSIAIPTNFTISVTTEILPVSMTKTSVDCTMYICGDSTECSNLLLQYGSFCTQLNRALTGIAVEQDKNTQEVFAQVKQIYKTPPIKDFGGFNFSQILPDPSKPSKRSFIEDLLFNKVTLADAGFIKQYGDCLGDIAARDLICAQKFNGLTVLPPLLTDEMIAQYTSALLAGTITSGWTFGAGAALQIPFAMQMAYRFNGIGVTQNVLYENQKLIANQFNSAIGKIQDSLSSTASALGKLQDVVNQNAQALNTLVKQLSSNFGAISSVLNDILSRLDKVEAEVQIDRLITGRLQSLQTYVTQQLIRAAEIRASANLAATKMSECVLGQSKRVDFCGKGYHLMSFPQSAPHGVVFLHVTYVPAQEKNFTTAPAICHDGKAHFPREGVFVSNGTHWFVTQRNFYEPQIITTDNTFVSGNCDVVIGIVNNTVYDPLQPELDSFKEELDKYFKNHTSPDVDLGDISGINASVVNIQKEIDRLNEVAKNLNESLIDLQELGKYEQYIKWPWYIWLGFIAGLIAIVMVTIMLCCMTSCCSCLKGCCSCGSCCKFDEDDSEPVLKGVKLHYT</sequence>
<name>SPIKE_SARS2</name>
<organism>
    <name type="scientific">Severe acute respiratory syndrome coronavirus 2</name>
    <name type="common">2019-nCoV</name>
    <name type="synonym">SARS-CoV-2</name>
    <dbReference type="NCBI Taxonomy" id="2697049"/>
    <lineage>
        <taxon>Viruses</taxon>
        <taxon>Riboviria</taxon>
        <taxon>Orthornavirae</taxon>
        <taxon>Pisuviricota</taxon>
        <taxon>Pisoniviricetes</taxon>
        <taxon>Nidovirales</taxon>
        <taxon>Cornidovirineae</taxon>
        <taxon>Coronaviridae</taxon>
        <taxon>Orthocoronavirinae</taxon>
        <taxon>Betacoronavirus</taxon>
        <taxon>Sarbecovirus</taxon>
        <taxon>Severe acute respiratory syndrome coronavirus</taxon>
    </lineage>
</organism>
<gene>
    <name evidence="2" type="primary">S</name>
    <name type="ORF">2</name>
</gene>
<dbReference type="EMBL" id="MN908947">
    <property type="protein sequence ID" value="QHD43416.1"/>
    <property type="molecule type" value="Genomic_RNA"/>
</dbReference>
<dbReference type="RefSeq" id="YP_009724390.1">
    <property type="nucleotide sequence ID" value="NC_045512.2"/>
</dbReference>
<dbReference type="PDB" id="6LVN">
    <property type="method" value="X-ray"/>
    <property type="resolution" value="2.47 A"/>
    <property type="chains" value="A/B/C/D=1168-1203"/>
</dbReference>
<dbReference type="PDB" id="6LXT">
    <property type="method" value="X-ray"/>
    <property type="resolution" value="2.90 A"/>
    <property type="chains" value="A/B/C/D/E/F=910-988, A/B/C/D/E/F=1162-1206"/>
</dbReference>
<dbReference type="PDB" id="6LZG">
    <property type="method" value="X-ray"/>
    <property type="resolution" value="2.50 A"/>
    <property type="chains" value="B=319-527"/>
</dbReference>
<dbReference type="PDB" id="6M0J">
    <property type="method" value="X-ray"/>
    <property type="resolution" value="2.45 A"/>
    <property type="chains" value="E=319-541"/>
</dbReference>
<dbReference type="PDB" id="6M17">
    <property type="method" value="EM"/>
    <property type="resolution" value="2.90 A"/>
    <property type="chains" value="E/F=319-541"/>
</dbReference>
<dbReference type="PDB" id="6M1V">
    <property type="method" value="X-ray"/>
    <property type="resolution" value="1.50 A"/>
    <property type="chains" value="A=917-966"/>
</dbReference>
<dbReference type="PDB" id="6VSB">
    <property type="method" value="EM"/>
    <property type="resolution" value="3.46 A"/>
    <property type="chains" value="A/B/C=1-1208"/>
</dbReference>
<dbReference type="PDB" id="6VW1">
    <property type="method" value="X-ray"/>
    <property type="resolution" value="2.68 A"/>
    <property type="chains" value="E/F=455-518"/>
</dbReference>
<dbReference type="PDB" id="6VXX">
    <property type="method" value="EM"/>
    <property type="resolution" value="2.80 A"/>
    <property type="chains" value="A/B/C=14-1211"/>
</dbReference>
<dbReference type="PDB" id="6VYB">
    <property type="method" value="EM"/>
    <property type="resolution" value="3.20 A"/>
    <property type="chains" value="A/B/C=14-1211"/>
</dbReference>
<dbReference type="PDB" id="6W41">
    <property type="method" value="X-ray"/>
    <property type="resolution" value="3.08 A"/>
    <property type="chains" value="C=319-541"/>
</dbReference>
<dbReference type="PDB" id="6WPS">
    <property type="method" value="EM"/>
    <property type="resolution" value="3.10 A"/>
    <property type="chains" value="A/B/E=11-1211"/>
</dbReference>
<dbReference type="PDB" id="6WPT">
    <property type="method" value="EM"/>
    <property type="resolution" value="3.70 A"/>
    <property type="chains" value="A/B/C=11-1211"/>
</dbReference>
<dbReference type="PDB" id="6X29">
    <property type="method" value="EM"/>
    <property type="resolution" value="2.70 A"/>
    <property type="chains" value="A/B/C=16-1208"/>
</dbReference>
<dbReference type="PDB" id="6X2A">
    <property type="method" value="EM"/>
    <property type="resolution" value="3.30 A"/>
    <property type="chains" value="A/B/C=16-1208"/>
</dbReference>
<dbReference type="PDB" id="6X2B">
    <property type="method" value="EM"/>
    <property type="resolution" value="3.60 A"/>
    <property type="chains" value="A/B/C=16-1208"/>
</dbReference>
<dbReference type="PDB" id="6X2C">
    <property type="method" value="EM"/>
    <property type="resolution" value="3.20 A"/>
    <property type="chains" value="A/B/C=16-1208"/>
</dbReference>
<dbReference type="PDB" id="6X45">
    <property type="method" value="X-ray"/>
    <property type="resolution" value="2.20 A"/>
    <property type="chains" value="A/B/C=912-966, D/E/F=1168-1203"/>
</dbReference>
<dbReference type="PDB" id="6X6P">
    <property type="method" value="EM"/>
    <property type="resolution" value="3.22 A"/>
    <property type="chains" value="A/B/C=15-1208"/>
</dbReference>
<dbReference type="PDB" id="6X79">
    <property type="method" value="EM"/>
    <property type="resolution" value="2.90 A"/>
    <property type="chains" value="A/B/C=14-1211"/>
</dbReference>
<dbReference type="PDB" id="6XC2">
    <property type="method" value="X-ray"/>
    <property type="resolution" value="3.11 A"/>
    <property type="chains" value="A/Z=319-541"/>
</dbReference>
<dbReference type="PDB" id="6XC3">
    <property type="method" value="X-ray"/>
    <property type="resolution" value="2.70 A"/>
    <property type="chains" value="C=319-541"/>
</dbReference>
<dbReference type="PDB" id="6XC4">
    <property type="method" value="X-ray"/>
    <property type="resolution" value="2.34 A"/>
    <property type="chains" value="A/Z=319-541"/>
</dbReference>
<dbReference type="PDB" id="6XC7">
    <property type="method" value="X-ray"/>
    <property type="resolution" value="2.88 A"/>
    <property type="chains" value="A=319-541"/>
</dbReference>
<dbReference type="PDB" id="6XCM">
    <property type="method" value="EM"/>
    <property type="resolution" value="3.42 A"/>
    <property type="chains" value="A/B/C=1-1213"/>
</dbReference>
<dbReference type="PDB" id="6XCN">
    <property type="method" value="EM"/>
    <property type="resolution" value="3.66 A"/>
    <property type="chains" value="A/C/E=1-1213"/>
</dbReference>
<dbReference type="PDB" id="6XDG">
    <property type="method" value="EM"/>
    <property type="resolution" value="3.90 A"/>
    <property type="chains" value="E=319-541"/>
</dbReference>
<dbReference type="PDB" id="6XE1">
    <property type="method" value="X-ray"/>
    <property type="resolution" value="2.75 A"/>
    <property type="chains" value="E=319-591"/>
</dbReference>
<dbReference type="PDB" id="6XEY">
    <property type="method" value="EM"/>
    <property type="resolution" value="3.25 A"/>
    <property type="chains" value="A/B/C=1-1208"/>
</dbReference>
<dbReference type="PDB" id="6XF5">
    <property type="method" value="EM"/>
    <property type="resolution" value="3.45 A"/>
    <property type="chains" value="A/B/C=14-1208"/>
</dbReference>
<dbReference type="PDB" id="6XF6">
    <property type="method" value="EM"/>
    <property type="resolution" value="4.00 A"/>
    <property type="chains" value="A/B/C=14-1208"/>
</dbReference>
<dbReference type="PDB" id="6XKL">
    <property type="method" value="EM"/>
    <property type="resolution" value="3.21 A"/>
    <property type="chains" value="A/B/C=1-1208"/>
</dbReference>
<dbReference type="PDB" id="6XKP">
    <property type="method" value="X-ray"/>
    <property type="resolution" value="2.72 A"/>
    <property type="chains" value="A/B=319-541"/>
</dbReference>
<dbReference type="PDB" id="6XKQ">
    <property type="method" value="X-ray"/>
    <property type="resolution" value="2.55 A"/>
    <property type="chains" value="A=319-541"/>
</dbReference>
<dbReference type="PDB" id="6XLU">
    <property type="method" value="EM"/>
    <property type="resolution" value="2.40 A"/>
    <property type="chains" value="A/B/C=14-1208"/>
</dbReference>
<dbReference type="PDB" id="6XM0">
    <property type="method" value="EM"/>
    <property type="resolution" value="2.70 A"/>
    <property type="chains" value="A/B/C=14-1208"/>
</dbReference>
<dbReference type="PDB" id="6XM3">
    <property type="method" value="EM"/>
    <property type="resolution" value="2.90 A"/>
    <property type="chains" value="A/B/C=14-1208"/>
</dbReference>
<dbReference type="PDB" id="6XM4">
    <property type="method" value="EM"/>
    <property type="resolution" value="2.90 A"/>
    <property type="chains" value="A/B/C=14-1208"/>
</dbReference>
<dbReference type="PDB" id="6XM5">
    <property type="method" value="EM"/>
    <property type="resolution" value="3.10 A"/>
    <property type="chains" value="A/B/C=14-1208"/>
</dbReference>
<dbReference type="PDB" id="6XR8">
    <property type="method" value="EM"/>
    <property type="resolution" value="2.90 A"/>
    <property type="chains" value="A/B/C=1-1273"/>
</dbReference>
<dbReference type="PDB" id="6XRA">
    <property type="method" value="EM"/>
    <property type="resolution" value="3.00 A"/>
    <property type="chains" value="A/B/C=1-1273"/>
</dbReference>
<dbReference type="PDB" id="6XS6">
    <property type="method" value="EM"/>
    <property type="resolution" value="3.70 A"/>
    <property type="chains" value="A/B/C=1-1213"/>
</dbReference>
<dbReference type="PDB" id="6YLA">
    <property type="method" value="X-ray"/>
    <property type="resolution" value="2.42 A"/>
    <property type="chains" value="A/E=330-532"/>
</dbReference>
<dbReference type="PDB" id="6YM0">
    <property type="method" value="X-ray"/>
    <property type="resolution" value="4.36 A"/>
    <property type="chains" value="E=330-532"/>
</dbReference>
<dbReference type="PDB" id="6YOR">
    <property type="method" value="EM"/>
    <property type="resolution" value="3.30 A"/>
    <property type="chains" value="A/E=330-532"/>
</dbReference>
<dbReference type="PDB" id="6YZ5">
    <property type="method" value="X-ray"/>
    <property type="resolution" value="1.80 A"/>
    <property type="chains" value="E=330-532"/>
</dbReference>
<dbReference type="PDB" id="6YZ7">
    <property type="method" value="X-ray"/>
    <property type="resolution" value="3.30 A"/>
    <property type="chains" value="AAA/EEE=330-532"/>
</dbReference>
<dbReference type="PDB" id="6Z2M">
    <property type="method" value="X-ray"/>
    <property type="resolution" value="2.71 A"/>
    <property type="chains" value="A/E=332-528"/>
</dbReference>
<dbReference type="PDB" id="6Z43">
    <property type="method" value="EM"/>
    <property type="resolution" value="3.30 A"/>
    <property type="chains" value="A/B/C=1-1208"/>
</dbReference>
<dbReference type="PDB" id="6Z97">
    <property type="method" value="EM"/>
    <property type="resolution" value="3.40 A"/>
    <property type="chains" value="A/B/C=1-1208"/>
</dbReference>
<dbReference type="PDB" id="6ZB4">
    <property type="method" value="EM"/>
    <property type="resolution" value="3.03 A"/>
    <property type="chains" value="A/B/C=1-1213"/>
</dbReference>
<dbReference type="PDB" id="6ZB5">
    <property type="method" value="EM"/>
    <property type="resolution" value="2.85 A"/>
    <property type="chains" value="A/B/C=1-1213"/>
</dbReference>
<dbReference type="PDB" id="6ZBP">
    <property type="method" value="X-ray"/>
    <property type="resolution" value="1.85 A"/>
    <property type="chains" value="EEE=330-532"/>
</dbReference>
<dbReference type="PDB" id="6ZCZ">
    <property type="method" value="X-ray"/>
    <property type="resolution" value="2.65 A"/>
    <property type="chains" value="E=333-528"/>
</dbReference>
<dbReference type="PDB" id="6ZDG">
    <property type="method" value="EM"/>
    <property type="resolution" value="4.70 A"/>
    <property type="chains" value="A/D/E=333-526"/>
</dbReference>
<dbReference type="PDB" id="6ZDH">
    <property type="method" value="EM"/>
    <property type="resolution" value="3.70 A"/>
    <property type="chains" value="A/B/C=1-1208"/>
</dbReference>
<dbReference type="PDB" id="6ZER">
    <property type="method" value="X-ray"/>
    <property type="resolution" value="3.80 A"/>
    <property type="chains" value="A/D/E=330-532"/>
</dbReference>
<dbReference type="PDB" id="6ZFO">
    <property type="method" value="EM"/>
    <property type="resolution" value="4.40 A"/>
    <property type="chains" value="A/E=333-526"/>
</dbReference>
<dbReference type="PDB" id="6ZGE">
    <property type="method" value="EM"/>
    <property type="resolution" value="2.60 A"/>
    <property type="chains" value="A/B/C=1-1208"/>
</dbReference>
<dbReference type="PDB" id="6ZGG">
    <property type="method" value="EM"/>
    <property type="resolution" value="3.80 A"/>
    <property type="chains" value="A/B/C=1-1208"/>
</dbReference>
<dbReference type="PDB" id="6ZGI">
    <property type="method" value="EM"/>
    <property type="resolution" value="2.90 A"/>
    <property type="chains" value="A/B/C=1-1208"/>
</dbReference>
<dbReference type="PDB" id="6ZH9">
    <property type="method" value="X-ray"/>
    <property type="resolution" value="3.31 A"/>
    <property type="chains" value="EEE=332-528"/>
</dbReference>
<dbReference type="PDB" id="6ZHD">
    <property type="method" value="EM"/>
    <property type="resolution" value="3.70 A"/>
    <property type="chains" value="A/B/C=1-1208"/>
</dbReference>
<dbReference type="PDB" id="6ZLR">
    <property type="method" value="X-ray"/>
    <property type="resolution" value="3.10 A"/>
    <property type="chains" value="AAA/DDD/EEE=319-541"/>
</dbReference>
<dbReference type="PDB" id="6ZOW">
    <property type="method" value="EM"/>
    <property type="resolution" value="3.00 A"/>
    <property type="chains" value="A/B/C/a=1-1273"/>
</dbReference>
<dbReference type="PDB" id="6ZOX">
    <property type="method" value="EM"/>
    <property type="resolution" value="3.00 A"/>
    <property type="chains" value="A/B/C=14-1211"/>
</dbReference>
<dbReference type="PDB" id="6ZOY">
    <property type="method" value="EM"/>
    <property type="resolution" value="3.10 A"/>
    <property type="chains" value="A/B/C=14-1211"/>
</dbReference>
<dbReference type="PDB" id="6ZOZ">
    <property type="method" value="EM"/>
    <property type="resolution" value="3.50 A"/>
    <property type="chains" value="A/B/C=14-1211"/>
</dbReference>
<dbReference type="PDB" id="6ZP0">
    <property type="method" value="EM"/>
    <property type="resolution" value="3.00 A"/>
    <property type="chains" value="A/B/C=14-1211"/>
</dbReference>
<dbReference type="PDB" id="6ZP1">
    <property type="method" value="EM"/>
    <property type="resolution" value="3.30 A"/>
    <property type="chains" value="A/B/C=14-1211"/>
</dbReference>
<dbReference type="PDB" id="6ZP2">
    <property type="method" value="EM"/>
    <property type="resolution" value="3.10 A"/>
    <property type="chains" value="A/B/C=14-1211"/>
</dbReference>
<dbReference type="PDB" id="6ZP5">
    <property type="method" value="EM"/>
    <property type="resolution" value="3.10 A"/>
    <property type="chains" value="A/B/C=1-1273"/>
</dbReference>
<dbReference type="PDB" id="6ZP7">
    <property type="method" value="EM"/>
    <property type="resolution" value="3.30 A"/>
    <property type="chains" value="A/B/C=1-1273"/>
</dbReference>
<dbReference type="PDB" id="6ZWV">
    <property type="method" value="EM"/>
    <property type="resolution" value="3.50 A"/>
    <property type="chains" value="A/B/C=1-1273"/>
</dbReference>
<dbReference type="PDB" id="6ZXN">
    <property type="method" value="EM"/>
    <property type="resolution" value="2.93 A"/>
    <property type="chains" value="A/B/C=1-1208"/>
</dbReference>
<dbReference type="PDB" id="7A25">
    <property type="method" value="EM"/>
    <property type="resolution" value="3.06 A"/>
    <property type="chains" value="A/B/C=1-1146"/>
</dbReference>
<dbReference type="PDB" id="7A29">
    <property type="method" value="EM"/>
    <property type="resolution" value="2.94 A"/>
    <property type="chains" value="A/B/C=1-1208"/>
</dbReference>
<dbReference type="PDB" id="7A4N">
    <property type="method" value="EM"/>
    <property type="resolution" value="2.75 A"/>
    <property type="chains" value="A/B/C=1-1208"/>
</dbReference>
<dbReference type="PDB" id="7A5R">
    <property type="method" value="EM"/>
    <property type="resolution" value="3.70 A"/>
    <property type="chains" value="A/B=1-1208"/>
</dbReference>
<dbReference type="PDB" id="7A5S">
    <property type="method" value="EM"/>
    <property type="resolution" value="3.90 A"/>
    <property type="chains" value="A/B=1-1208"/>
</dbReference>
<dbReference type="PDB" id="7A91">
    <property type="method" value="EM"/>
    <property type="resolution" value="3.60 A"/>
    <property type="chains" value="A=1-685"/>
</dbReference>
<dbReference type="PDB" id="7A92">
    <property type="method" value="EM"/>
    <property type="resolution" value="4.20 A"/>
    <property type="chains" value="A=1-676"/>
</dbReference>
<dbReference type="PDB" id="7A93">
    <property type="method" value="EM"/>
    <property type="resolution" value="5.90 A"/>
    <property type="chains" value="A/B/C=1-1208"/>
</dbReference>
<dbReference type="PDB" id="7A94">
    <property type="method" value="EM"/>
    <property type="resolution" value="3.90 A"/>
    <property type="chains" value="A/B/C=1-1208"/>
</dbReference>
<dbReference type="PDB" id="7A95">
    <property type="method" value="EM"/>
    <property type="resolution" value="4.30 A"/>
    <property type="chains" value="A/B/C=1-1208"/>
</dbReference>
<dbReference type="PDB" id="7A96">
    <property type="method" value="EM"/>
    <property type="resolution" value="4.80 A"/>
    <property type="chains" value="A/B/C=1-1208"/>
</dbReference>
<dbReference type="PDB" id="7A97">
    <property type="method" value="EM"/>
    <property type="resolution" value="4.40 A"/>
    <property type="chains" value="A/B/C=1-1208"/>
</dbReference>
<dbReference type="PDB" id="7A98">
    <property type="method" value="EM"/>
    <property type="resolution" value="5.40 A"/>
    <property type="chains" value="A/B/C=1-1208"/>
</dbReference>
<dbReference type="PDB" id="7AD1">
    <property type="method" value="EM"/>
    <property type="resolution" value="2.92 A"/>
    <property type="chains" value="A/B/C=1-1208"/>
</dbReference>
<dbReference type="PDB" id="7AKD">
    <property type="method" value="EM"/>
    <property type="resolution" value="4.00 A"/>
    <property type="chains" value="A/B/C=1-1208"/>
</dbReference>
<dbReference type="PDB" id="7B0B">
    <property type="method" value="X-ray"/>
    <property type="resolution" value="2.98 A"/>
    <property type="chains" value="F=319-541"/>
</dbReference>
<dbReference type="PDB" id="7B14">
    <property type="method" value="EM"/>
    <property type="resolution" value="3.79 A"/>
    <property type="chains" value="A=333-528"/>
</dbReference>
<dbReference type="PDB" id="7B17">
    <property type="method" value="EM"/>
    <property type="resolution" value="4.01 A"/>
    <property type="chains" value="A=334-528"/>
</dbReference>
<dbReference type="PDB" id="7B18">
    <property type="method" value="EM"/>
    <property type="resolution" value="2.62 A"/>
    <property type="chains" value="A/B/C=1-1208"/>
</dbReference>
<dbReference type="PDB" id="7B3O">
    <property type="method" value="X-ray"/>
    <property type="resolution" value="2.00 A"/>
    <property type="chains" value="E=331-524"/>
</dbReference>
<dbReference type="PDB" id="7B62">
    <property type="method" value="X-ray"/>
    <property type="resolution" value="1.82 A"/>
    <property type="chains" value="A=1-311"/>
</dbReference>
<dbReference type="PDB" id="7BEH">
    <property type="method" value="X-ray"/>
    <property type="resolution" value="2.30 A"/>
    <property type="chains" value="E=333-528"/>
</dbReference>
<dbReference type="PDB" id="7BEI">
    <property type="method" value="X-ray"/>
    <property type="resolution" value="2.30 A"/>
    <property type="chains" value="E=333-528"/>
</dbReference>
<dbReference type="PDB" id="7BEJ">
    <property type="method" value="X-ray"/>
    <property type="resolution" value="2.42 A"/>
    <property type="chains" value="E=333-528"/>
</dbReference>
<dbReference type="PDB" id="7BEK">
    <property type="method" value="X-ray"/>
    <property type="resolution" value="2.04 A"/>
    <property type="chains" value="E=333-528"/>
</dbReference>
<dbReference type="PDB" id="7BEL">
    <property type="method" value="X-ray"/>
    <property type="resolution" value="2.53 A"/>
    <property type="chains" value="R/X=333-528"/>
</dbReference>
<dbReference type="PDB" id="7BEM">
    <property type="method" value="X-ray"/>
    <property type="resolution" value="2.52 A"/>
    <property type="chains" value="E=333-528"/>
</dbReference>
<dbReference type="PDB" id="7BEN">
    <property type="method" value="X-ray"/>
    <property type="resolution" value="2.50 A"/>
    <property type="chains" value="C/E=333-528"/>
</dbReference>
<dbReference type="PDB" id="7BEO">
    <property type="method" value="X-ray"/>
    <property type="resolution" value="3.19 A"/>
    <property type="chains" value="R/X=333-528"/>
</dbReference>
<dbReference type="PDB" id="7BEP">
    <property type="method" value="X-ray"/>
    <property type="resolution" value="2.61 A"/>
    <property type="chains" value="C/E=333-528"/>
</dbReference>
<dbReference type="PDB" id="7BH9">
    <property type="method" value="EM"/>
    <property type="resolution" value="2.90 A"/>
    <property type="chains" value="E=333-528"/>
</dbReference>
<dbReference type="PDB" id="7BNM">
    <property type="method" value="EM"/>
    <property type="resolution" value="3.60 A"/>
    <property type="chains" value="A/B/C=1-1146"/>
</dbReference>
<dbReference type="PDB" id="7BNN">
    <property type="method" value="EM"/>
    <property type="resolution" value="3.50 A"/>
    <property type="chains" value="A/B/C=1-1208"/>
</dbReference>
<dbReference type="PDB" id="7BNO">
    <property type="method" value="EM"/>
    <property type="resolution" value="4.20 A"/>
    <property type="chains" value="A/B/C=1-1146"/>
</dbReference>
<dbReference type="PDB" id="7BNV">
    <property type="method" value="X-ray"/>
    <property type="resolution" value="2.35 A"/>
    <property type="chains" value="A=319-541"/>
</dbReference>
<dbReference type="PDB" id="7BWJ">
    <property type="method" value="X-ray"/>
    <property type="resolution" value="2.85 A"/>
    <property type="chains" value="E=319-529"/>
</dbReference>
<dbReference type="PDB" id="7BYR">
    <property type="method" value="EM"/>
    <property type="resolution" value="3.84 A"/>
    <property type="chains" value="A/B/C=1-1208"/>
</dbReference>
<dbReference type="PDB" id="7BZ5">
    <property type="method" value="X-ray"/>
    <property type="resolution" value="1.84 A"/>
    <property type="chains" value="A=319-541"/>
</dbReference>
<dbReference type="PDB" id="7C01">
    <property type="method" value="X-ray"/>
    <property type="resolution" value="2.88 A"/>
    <property type="chains" value="A/B=319-541"/>
</dbReference>
<dbReference type="PDB" id="7C2L">
    <property type="method" value="EM"/>
    <property type="resolution" value="3.10 A"/>
    <property type="chains" value="A/B/C=1-1273"/>
</dbReference>
<dbReference type="PDB" id="7C53">
    <property type="method" value="X-ray"/>
    <property type="resolution" value="2.28 A"/>
    <property type="chains" value="A/B/C/D/E/F=910-975"/>
</dbReference>
<dbReference type="PDB" id="7C8D">
    <property type="method" value="EM"/>
    <property type="resolution" value="3.00 A"/>
    <property type="chains" value="B=333-527"/>
</dbReference>
<dbReference type="PDB" id="7C8J">
    <property type="method" value="X-ray"/>
    <property type="resolution" value="3.18 A"/>
    <property type="chains" value="B=333-527"/>
</dbReference>
<dbReference type="PDB" id="7C8V">
    <property type="method" value="X-ray"/>
    <property type="resolution" value="2.15 A"/>
    <property type="chains" value="B=330-531"/>
</dbReference>
<dbReference type="PDB" id="7C8W">
    <property type="method" value="X-ray"/>
    <property type="resolution" value="2.77 A"/>
    <property type="chains" value="B=330-531"/>
</dbReference>
<dbReference type="PDB" id="7CAB">
    <property type="method" value="EM"/>
    <property type="resolution" value="3.52 A"/>
    <property type="chains" value="A/B/C=1-1208"/>
</dbReference>
<dbReference type="PDB" id="7CAC">
    <property type="method" value="EM"/>
    <property type="resolution" value="3.55 A"/>
    <property type="chains" value="A/B/C=1-1208"/>
</dbReference>
<dbReference type="PDB" id="7CAH">
    <property type="method" value="EM"/>
    <property type="resolution" value="3.90 A"/>
    <property type="chains" value="A=334-527"/>
</dbReference>
<dbReference type="PDB" id="7CAI">
    <property type="method" value="EM"/>
    <property type="resolution" value="3.49 A"/>
    <property type="chains" value="A/B/C=1-1208"/>
</dbReference>
<dbReference type="PDB" id="7CAK">
    <property type="method" value="EM"/>
    <property type="resolution" value="3.58 A"/>
    <property type="chains" value="A/B/C=1-1208"/>
</dbReference>
<dbReference type="PDB" id="7CAN">
    <property type="method" value="X-ray"/>
    <property type="resolution" value="2.94 A"/>
    <property type="chains" value="B=330-531"/>
</dbReference>
<dbReference type="PDB" id="7CDI">
    <property type="method" value="X-ray"/>
    <property type="resolution" value="2.96 A"/>
    <property type="chains" value="E=319-529"/>
</dbReference>
<dbReference type="PDB" id="7CDJ">
    <property type="method" value="X-ray"/>
    <property type="resolution" value="3.40 A"/>
    <property type="chains" value="E=319-529"/>
</dbReference>
<dbReference type="PDB" id="7CH4">
    <property type="method" value="X-ray"/>
    <property type="resolution" value="3.15 A"/>
    <property type="chains" value="R=319-541"/>
</dbReference>
<dbReference type="PDB" id="7CH5">
    <property type="method" value="X-ray"/>
    <property type="resolution" value="2.70 A"/>
    <property type="chains" value="R=319-541"/>
</dbReference>
<dbReference type="PDB" id="7CHB">
    <property type="method" value="X-ray"/>
    <property type="resolution" value="2.40 A"/>
    <property type="chains" value="R=319-541"/>
</dbReference>
<dbReference type="PDB" id="7CHC">
    <property type="method" value="X-ray"/>
    <property type="resolution" value="2.71 A"/>
    <property type="chains" value="R=319-541"/>
</dbReference>
<dbReference type="PDB" id="7CHE">
    <property type="method" value="X-ray"/>
    <property type="resolution" value="3.42 A"/>
    <property type="chains" value="R=319-541"/>
</dbReference>
<dbReference type="PDB" id="7CHF">
    <property type="method" value="X-ray"/>
    <property type="resolution" value="2.67 A"/>
    <property type="chains" value="R=319-541"/>
</dbReference>
<dbReference type="PDB" id="7CHH">
    <property type="method" value="EM"/>
    <property type="resolution" value="3.49 A"/>
    <property type="chains" value="A/B/C=1-1208"/>
</dbReference>
<dbReference type="PDB" id="7CHO">
    <property type="method" value="X-ray"/>
    <property type="resolution" value="2.56 A"/>
    <property type="chains" value="A/E=319-529"/>
</dbReference>
<dbReference type="PDB" id="7CHP">
    <property type="method" value="X-ray"/>
    <property type="resolution" value="2.36 A"/>
    <property type="chains" value="E=319-529"/>
</dbReference>
<dbReference type="PDB" id="7CHS">
    <property type="method" value="X-ray"/>
    <property type="resolution" value="2.40 A"/>
    <property type="chains" value="E=319-529"/>
</dbReference>
<dbReference type="PDB" id="7CJF">
    <property type="method" value="X-ray"/>
    <property type="resolution" value="2.11 A"/>
    <property type="chains" value="C=334-527"/>
</dbReference>
<dbReference type="PDB" id="7CM4">
    <property type="method" value="X-ray"/>
    <property type="resolution" value="2.71 A"/>
    <property type="chains" value="A=319-536"/>
</dbReference>
<dbReference type="PDB" id="7CN4">
    <property type="method" value="EM"/>
    <property type="resolution" value="2.93 A"/>
    <property type="chains" value="A/B/C=1-1213"/>
</dbReference>
<dbReference type="PDB" id="7CN9">
    <property type="method" value="EM"/>
    <property type="resolution" value="4.70 A"/>
    <property type="chains" value="A/B/C=14-1140"/>
</dbReference>
<dbReference type="PDB" id="7CT5">
    <property type="method" value="EM"/>
    <property type="resolution" value="4.00 A"/>
    <property type="chains" value="A/B/C=1-1273"/>
</dbReference>
<dbReference type="PDB" id="7CWL">
    <property type="method" value="EM"/>
    <property type="resolution" value="3.80 A"/>
    <property type="chains" value="A/B/C=1-1273"/>
</dbReference>
<dbReference type="PDB" id="7CWM">
    <property type="method" value="EM"/>
    <property type="resolution" value="3.60 A"/>
    <property type="chains" value="A/B/C=1-1273"/>
</dbReference>
<dbReference type="PDB" id="7CWN">
    <property type="method" value="EM"/>
    <property type="resolution" value="3.20 A"/>
    <property type="chains" value="A/B/C=1-1273"/>
</dbReference>
<dbReference type="PDB" id="7CWO">
    <property type="method" value="EM"/>
    <property type="resolution" value="3.90 A"/>
    <property type="chains" value="A=1-1273"/>
</dbReference>
<dbReference type="PDB" id="7CWS">
    <property type="method" value="EM"/>
    <property type="resolution" value="3.40 A"/>
    <property type="chains" value="O/Q/R=14-1147"/>
</dbReference>
<dbReference type="PDB" id="7CWT">
    <property type="method" value="EM"/>
    <property type="resolution" value="3.70 A"/>
    <property type="chains" value="A/B/C=14-1147"/>
</dbReference>
<dbReference type="PDB" id="7CWU">
    <property type="method" value="EM"/>
    <property type="resolution" value="3.50 A"/>
    <property type="chains" value="A/B/C=1-1273"/>
</dbReference>
<dbReference type="PDB" id="7CYH">
    <property type="method" value="EM"/>
    <property type="resolution" value="3.90 A"/>
    <property type="chains" value="A=334-527"/>
</dbReference>
<dbReference type="PDB" id="7CYP">
    <property type="method" value="EM"/>
    <property type="resolution" value="3.50 A"/>
    <property type="chains" value="A/B/C=1-1208"/>
</dbReference>
<dbReference type="PDB" id="7CYV">
    <property type="method" value="X-ray"/>
    <property type="resolution" value="3.13 A"/>
    <property type="chains" value="B=330-531"/>
</dbReference>
<dbReference type="PDB" id="7CZP">
    <property type="method" value="EM"/>
    <property type="resolution" value="3.00 A"/>
    <property type="chains" value="A/B/C=1-1273"/>
</dbReference>
<dbReference type="PDB" id="7CZQ">
    <property type="method" value="EM"/>
    <property type="resolution" value="2.80 A"/>
    <property type="chains" value="A/B/C=1-1273"/>
</dbReference>
<dbReference type="PDB" id="7CZR">
    <property type="method" value="EM"/>
    <property type="resolution" value="3.50 A"/>
    <property type="chains" value="A/B/C=1-1273"/>
</dbReference>
<dbReference type="PDB" id="7CZS">
    <property type="method" value="EM"/>
    <property type="resolution" value="3.60 A"/>
    <property type="chains" value="A/B/C=1-1273"/>
</dbReference>
<dbReference type="PDB" id="7CZT">
    <property type="method" value="EM"/>
    <property type="resolution" value="2.70 A"/>
    <property type="chains" value="A/B/C=1-1273"/>
</dbReference>
<dbReference type="PDB" id="7CZU">
    <property type="method" value="EM"/>
    <property type="resolution" value="3.40 A"/>
    <property type="chains" value="A/B/C=1-1273"/>
</dbReference>
<dbReference type="PDB" id="7CZV">
    <property type="method" value="EM"/>
    <property type="resolution" value="3.30 A"/>
    <property type="chains" value="A/B/C=1-1273"/>
</dbReference>
<dbReference type="PDB" id="7CZW">
    <property type="method" value="EM"/>
    <property type="resolution" value="2.80 A"/>
    <property type="chains" value="A/B/C=1-1273"/>
</dbReference>
<dbReference type="PDB" id="7CZX">
    <property type="method" value="EM"/>
    <property type="resolution" value="2.80 A"/>
    <property type="chains" value="A/B/C=1-1273"/>
</dbReference>
<dbReference type="PDB" id="7CZY">
    <property type="method" value="EM"/>
    <property type="resolution" value="3.30 A"/>
    <property type="chains" value="A/B/C=1-1273"/>
</dbReference>
<dbReference type="PDB" id="7CZZ">
    <property type="method" value="EM"/>
    <property type="resolution" value="3.20 A"/>
    <property type="chains" value="A/B/C=1-1273"/>
</dbReference>
<dbReference type="PDB" id="7D00">
    <property type="method" value="EM"/>
    <property type="resolution" value="3.00 A"/>
    <property type="chains" value="A/B/C=1-1273"/>
</dbReference>
<dbReference type="PDB" id="7D03">
    <property type="method" value="EM"/>
    <property type="resolution" value="3.20 A"/>
    <property type="chains" value="A/B/C=1-1273"/>
</dbReference>
<dbReference type="PDB" id="7D0B">
    <property type="method" value="EM"/>
    <property type="resolution" value="3.90 A"/>
    <property type="chains" value="A/B/C=1-1273"/>
</dbReference>
<dbReference type="PDB" id="7D0C">
    <property type="method" value="EM"/>
    <property type="resolution" value="3.40 A"/>
    <property type="chains" value="A/B/C=1-1273"/>
</dbReference>
<dbReference type="PDB" id="7D0D">
    <property type="method" value="EM"/>
    <property type="resolution" value="3.80 A"/>
    <property type="chains" value="A/B/C=1-1273"/>
</dbReference>
<dbReference type="PDB" id="7D2Z">
    <property type="method" value="X-ray"/>
    <property type="resolution" value="1.97 A"/>
    <property type="chains" value="B=330-531"/>
</dbReference>
<dbReference type="PDB" id="7D30">
    <property type="method" value="X-ray"/>
    <property type="resolution" value="2.10 A"/>
    <property type="chains" value="B=330-531"/>
</dbReference>
<dbReference type="PDB" id="7D4G">
    <property type="method" value="EM"/>
    <property type="resolution" value="3.90 A"/>
    <property type="chains" value="B=13-290"/>
</dbReference>
<dbReference type="PDB" id="7D6I">
    <property type="method" value="X-ray"/>
    <property type="resolution" value="3.41 A"/>
    <property type="chains" value="A=319-532"/>
</dbReference>
<dbReference type="PDB" id="7DCC">
    <property type="method" value="EM"/>
    <property type="resolution" value="4.30 A"/>
    <property type="chains" value="E/I/K=1-1208"/>
</dbReference>
<dbReference type="PDB" id="7DCX">
    <property type="method" value="EM"/>
    <property type="resolution" value="5.90 A"/>
    <property type="chains" value="C/D/K=1-1208"/>
</dbReference>
<dbReference type="PDB" id="7DD2">
    <property type="method" value="EM"/>
    <property type="resolution" value="5.60 A"/>
    <property type="chains" value="C/D/K=1-1208"/>
</dbReference>
<dbReference type="PDB" id="7DD8">
    <property type="method" value="EM"/>
    <property type="resolution" value="7.50 A"/>
    <property type="chains" value="C/D/E=1-1208"/>
</dbReference>
<dbReference type="PDB" id="7DDD">
    <property type="method" value="EM"/>
    <property type="resolution" value="3.00 A"/>
    <property type="chains" value="A/B/C=1-1208"/>
</dbReference>
<dbReference type="PDB" id="7DDN">
    <property type="method" value="EM"/>
    <property type="resolution" value="6.30 A"/>
    <property type="chains" value="A/B/C=1-1208"/>
</dbReference>
<dbReference type="PDB" id="7DEO">
    <property type="method" value="X-ray"/>
    <property type="resolution" value="2.50 A"/>
    <property type="chains" value="B/D=334-530"/>
</dbReference>
<dbReference type="PDB" id="7DET">
    <property type="method" value="X-ray"/>
    <property type="resolution" value="2.20 A"/>
    <property type="chains" value="A/C=334-530"/>
</dbReference>
<dbReference type="PDB" id="7DEU">
    <property type="method" value="X-ray"/>
    <property type="resolution" value="2.10 A"/>
    <property type="chains" value="A=334-530"/>
</dbReference>
<dbReference type="PDB" id="7DF3">
    <property type="method" value="EM"/>
    <property type="resolution" value="2.70 A"/>
    <property type="chains" value="A/B/C=1-1208"/>
</dbReference>
<dbReference type="PDB" id="7DF4">
    <property type="method" value="EM"/>
    <property type="resolution" value="3.80 A"/>
    <property type="chains" value="B/C/D=1-1208"/>
</dbReference>
<dbReference type="PDB" id="7DHX">
    <property type="method" value="X-ray"/>
    <property type="resolution" value="2.30 A"/>
    <property type="chains" value="B=319-527"/>
</dbReference>
<dbReference type="PDB" id="7DJZ">
    <property type="method" value="X-ray"/>
    <property type="resolution" value="2.40 A"/>
    <property type="chains" value="C=319-541"/>
</dbReference>
<dbReference type="PDB" id="7DK0">
    <property type="method" value="X-ray"/>
    <property type="resolution" value="3.20 A"/>
    <property type="chains" value="C=319-541"/>
</dbReference>
<dbReference type="PDB" id="7DK2">
    <property type="method" value="X-ray"/>
    <property type="resolution" value="3.00 A"/>
    <property type="chains" value="C/F/I/L=319-541"/>
</dbReference>
<dbReference type="PDB" id="7DK3">
    <property type="method" value="EM"/>
    <property type="resolution" value="6.00 A"/>
    <property type="chains" value="A/B/C=1-1208"/>
</dbReference>
<dbReference type="PDB" id="7DK4">
    <property type="method" value="EM"/>
    <property type="resolution" value="3.80 A"/>
    <property type="chains" value="A/B/C=1-1208"/>
</dbReference>
<dbReference type="PDB" id="7DK5">
    <property type="method" value="EM"/>
    <property type="resolution" value="13.50 A"/>
    <property type="chains" value="A/B/C=1-1208"/>
</dbReference>
<dbReference type="PDB" id="7DK6">
    <property type="method" value="EM"/>
    <property type="resolution" value="4.30 A"/>
    <property type="chains" value="A/B/C=1-1208"/>
</dbReference>
<dbReference type="PDB" id="7DK7">
    <property type="method" value="EM"/>
    <property type="resolution" value="9.70 A"/>
    <property type="chains" value="A/B/C=1-1208"/>
</dbReference>
<dbReference type="PDB" id="7DMU">
    <property type="method" value="X-ray"/>
    <property type="resolution" value="3.20 A"/>
    <property type="chains" value="B/D=319-531"/>
</dbReference>
<dbReference type="PDB" id="7DPM">
    <property type="method" value="X-ray"/>
    <property type="resolution" value="3.30 A"/>
    <property type="chains" value="C/F/I/L=319-541"/>
</dbReference>
<dbReference type="PDB" id="7DQA">
    <property type="method" value="EM"/>
    <property type="resolution" value="2.80 A"/>
    <property type="chains" value="C=333-526"/>
</dbReference>
<dbReference type="PDB" id="7DWX">
    <property type="method" value="EM"/>
    <property type="resolution" value="8.30 A"/>
    <property type="chains" value="E/F/G/H/I/J=1-1273"/>
</dbReference>
<dbReference type="PDB" id="7DWY">
    <property type="method" value="EM"/>
    <property type="resolution" value="2.70 A"/>
    <property type="chains" value="A/B/C=1-1273"/>
</dbReference>
<dbReference type="PDB" id="7DWZ">
    <property type="method" value="EM"/>
    <property type="resolution" value="3.30 A"/>
    <property type="chains" value="A/B/C=1-1273"/>
</dbReference>
<dbReference type="PDB" id="7DX0">
    <property type="method" value="EM"/>
    <property type="resolution" value="3.20 A"/>
    <property type="chains" value="A/B/C=1-1273"/>
</dbReference>
<dbReference type="PDB" id="7DX1">
    <property type="method" value="EM"/>
    <property type="resolution" value="3.10 A"/>
    <property type="chains" value="A/B/C=1-1273"/>
</dbReference>
<dbReference type="PDB" id="7DX2">
    <property type="method" value="EM"/>
    <property type="resolution" value="3.30 A"/>
    <property type="chains" value="A/B/C=1-1273"/>
</dbReference>
<dbReference type="PDB" id="7DX3">
    <property type="method" value="EM"/>
    <property type="resolution" value="3.50 A"/>
    <property type="chains" value="A/B/C=1-1273"/>
</dbReference>
<dbReference type="PDB" id="7DX4">
    <property type="method" value="EM"/>
    <property type="resolution" value="3.60 A"/>
    <property type="chains" value="E=333-526"/>
</dbReference>
<dbReference type="PDB" id="7DX5">
    <property type="method" value="EM"/>
    <property type="resolution" value="3.30 A"/>
    <property type="chains" value="A/B/C=1-1273"/>
</dbReference>
<dbReference type="PDB" id="7DX6">
    <property type="method" value="EM"/>
    <property type="resolution" value="3.00 A"/>
    <property type="chains" value="A/B/C=1-1273"/>
</dbReference>
<dbReference type="PDB" id="7DX7">
    <property type="method" value="EM"/>
    <property type="resolution" value="3.40 A"/>
    <property type="chains" value="A/B/C=1-1273"/>
</dbReference>
<dbReference type="PDB" id="7DX8">
    <property type="method" value="EM"/>
    <property type="resolution" value="2.90 A"/>
    <property type="chains" value="A/B/C=1-1273"/>
</dbReference>
<dbReference type="PDB" id="7DX9">
    <property type="method" value="EM"/>
    <property type="resolution" value="3.60 A"/>
    <property type="chains" value="A/B/C=1-1273"/>
</dbReference>
<dbReference type="PDB" id="7DZW">
    <property type="method" value="EM"/>
    <property type="resolution" value="3.45 A"/>
    <property type="chains" value="A/B/C=14-1254"/>
</dbReference>
<dbReference type="PDB" id="7DZX">
    <property type="method" value="EM"/>
    <property type="resolution" value="3.53 A"/>
    <property type="chains" value="A/B/C=27-1147"/>
</dbReference>
<dbReference type="PDB" id="7DZY">
    <property type="method" value="EM"/>
    <property type="resolution" value="3.60 A"/>
    <property type="chains" value="A/B/C=27-1211"/>
</dbReference>
<dbReference type="PDB" id="7E23">
    <property type="method" value="EM"/>
    <property type="resolution" value="3.30 A"/>
    <property type="chains" value="A=333-526"/>
</dbReference>
<dbReference type="PDB" id="7E39">
    <property type="method" value="EM"/>
    <property type="resolution" value="3.70 A"/>
    <property type="chains" value="A=333-526"/>
</dbReference>
<dbReference type="PDB" id="7E3B">
    <property type="method" value="EM"/>
    <property type="resolution" value="4.20 A"/>
    <property type="chains" value="A=333-526"/>
</dbReference>
<dbReference type="PDB" id="7E3C">
    <property type="method" value="EM"/>
    <property type="resolution" value="4.20 A"/>
    <property type="chains" value="A=333-526"/>
</dbReference>
<dbReference type="PDB" id="7E3J">
    <property type="method" value="X-ray"/>
    <property type="resolution" value="2.99 A"/>
    <property type="chains" value="B=333-527"/>
</dbReference>
<dbReference type="PDB" id="7E3K">
    <property type="method" value="EM"/>
    <property type="resolution" value="3.90 A"/>
    <property type="chains" value="A/B/C=1-1208"/>
</dbReference>
<dbReference type="PDB" id="7E3L">
    <property type="method" value="EM"/>
    <property type="resolution" value="3.60 A"/>
    <property type="chains" value="A/B/C=1-1208"/>
</dbReference>
<dbReference type="PDB" id="7E3O">
    <property type="method" value="X-ray"/>
    <property type="resolution" value="2.51 A"/>
    <property type="chains" value="R=337-527"/>
</dbReference>
<dbReference type="PDB" id="7E5O">
    <property type="method" value="X-ray"/>
    <property type="resolution" value="2.80 A"/>
    <property type="chains" value="A=322-536"/>
</dbReference>
<dbReference type="PDB" id="7E5R">
    <property type="method" value="EM"/>
    <property type="resolution" value="3.60 A"/>
    <property type="chains" value="A/B/C=1-1208"/>
</dbReference>
<dbReference type="PDB" id="7E5S">
    <property type="method" value="EM"/>
    <property type="resolution" value="3.60 A"/>
    <property type="chains" value="A/B/C=1-1208"/>
</dbReference>
<dbReference type="PDB" id="7E5Y">
    <property type="method" value="X-ray"/>
    <property type="resolution" value="3.59 A"/>
    <property type="chains" value="A/R=319-541"/>
</dbReference>
<dbReference type="PDB" id="7E7B">
    <property type="method" value="EM"/>
    <property type="resolution" value="2.60 A"/>
    <property type="chains" value="A/B/C=1-1211"/>
</dbReference>
<dbReference type="PDB" id="7E7D">
    <property type="method" value="EM"/>
    <property type="resolution" value="3.20 A"/>
    <property type="chains" value="A/B/C=1-1211"/>
</dbReference>
<dbReference type="PDB" id="7E7X">
    <property type="method" value="X-ray"/>
    <property type="resolution" value="2.78 A"/>
    <property type="chains" value="A/B=13-303"/>
</dbReference>
<dbReference type="PDB" id="7E7Y">
    <property type="method" value="X-ray"/>
    <property type="resolution" value="2.41 A"/>
    <property type="chains" value="E/R=319-541"/>
</dbReference>
<dbReference type="PDB" id="7E86">
    <property type="method" value="X-ray"/>
    <property type="resolution" value="2.90 A"/>
    <property type="chains" value="C=333-526"/>
</dbReference>
<dbReference type="PDB" id="7E88">
    <property type="method" value="X-ray"/>
    <property type="resolution" value="3.14 A"/>
    <property type="chains" value="C/F/I/L=333-526"/>
</dbReference>
<dbReference type="PDB" id="7E8C">
    <property type="method" value="EM"/>
    <property type="resolution" value="3.16 A"/>
    <property type="chains" value="A/B/C=1-1208"/>
</dbReference>
<dbReference type="PDB" id="7E8F">
    <property type="method" value="EM"/>
    <property type="resolution" value="3.18 A"/>
    <property type="chains" value="A=13-303, R=319-541"/>
</dbReference>
<dbReference type="PDB" id="7E8M">
    <property type="method" value="X-ray"/>
    <property type="resolution" value="2.09 A"/>
    <property type="chains" value="E=333-527"/>
</dbReference>
<dbReference type="PDB" id="7E9N">
    <property type="method" value="EM"/>
    <property type="resolution" value="3.69 A"/>
    <property type="chains" value="A/B/C=27-1147"/>
</dbReference>
<dbReference type="PDB" id="7E9O">
    <property type="method" value="EM"/>
    <property type="resolution" value="3.41 A"/>
    <property type="chains" value="A/B/C=1-1208"/>
</dbReference>
<dbReference type="PDB" id="7E9P">
    <property type="method" value="EM"/>
    <property type="resolution" value="3.69 A"/>
    <property type="chains" value="B=1-1208"/>
</dbReference>
<dbReference type="PDB" id="7E9Q">
    <property type="method" value="EM"/>
    <property type="resolution" value="3.65 A"/>
    <property type="chains" value="A/B/C=1-1208"/>
</dbReference>
<dbReference type="PDB" id="7E9T">
    <property type="method" value="EM"/>
    <property type="resolution" value="10.90 A"/>
    <property type="chains" value="A/B/C=703-1234"/>
</dbReference>
<dbReference type="PDB" id="7EAM">
    <property type="method" value="X-ray"/>
    <property type="resolution" value="1.40 A"/>
    <property type="chains" value="A/B=319-541"/>
</dbReference>
<dbReference type="PDB" id="7EAN">
    <property type="method" value="X-ray"/>
    <property type="resolution" value="1.91 A"/>
    <property type="chains" value="A=319-541"/>
</dbReference>
<dbReference type="PDB" id="7EAZ">
    <property type="method" value="EM"/>
    <property type="resolution" value="3.50 A"/>
    <property type="chains" value="A/B/C=1-1208"/>
</dbReference>
<dbReference type="PDB" id="7EB0">
    <property type="method" value="EM"/>
    <property type="resolution" value="3.60 A"/>
    <property type="chains" value="A/B/C=1-1208"/>
</dbReference>
<dbReference type="PDB" id="7EB3">
    <property type="method" value="EM"/>
    <property type="resolution" value="3.60 A"/>
    <property type="chains" value="A/B/C=1-1208"/>
</dbReference>
<dbReference type="PDB" id="7EB4">
    <property type="method" value="EM"/>
    <property type="resolution" value="3.50 A"/>
    <property type="chains" value="A/B/C=1-1208"/>
</dbReference>
<dbReference type="PDB" id="7EB5">
    <property type="method" value="EM"/>
    <property type="resolution" value="3.40 A"/>
    <property type="chains" value="A/B/C=1-1208"/>
</dbReference>
<dbReference type="PDB" id="7EDF">
    <property type="method" value="EM"/>
    <property type="resolution" value="3.20 A"/>
    <property type="chains" value="A/B/C=16-1208"/>
</dbReference>
<dbReference type="PDB" id="7EDG">
    <property type="method" value="EM"/>
    <property type="resolution" value="3.20 A"/>
    <property type="chains" value="A/B/C=16-1208"/>
</dbReference>
<dbReference type="PDB" id="7EDH">
    <property type="method" value="EM"/>
    <property type="resolution" value="3.60 A"/>
    <property type="chains" value="A/B/C=16-1208"/>
</dbReference>
<dbReference type="PDB" id="7EDI">
    <property type="method" value="EM"/>
    <property type="resolution" value="3.30 A"/>
    <property type="chains" value="A/B/C=16-1208"/>
</dbReference>
<dbReference type="PDB" id="7EDJ">
    <property type="method" value="EM"/>
    <property type="resolution" value="3.30 A"/>
    <property type="chains" value="A/B/C=16-1208"/>
</dbReference>
<dbReference type="PDB" id="7EFP">
    <property type="method" value="X-ray"/>
    <property type="resolution" value="2.70 A"/>
    <property type="chains" value="B=320-537"/>
</dbReference>
<dbReference type="PDB" id="7EFR">
    <property type="method" value="X-ray"/>
    <property type="resolution" value="2.49 A"/>
    <property type="chains" value="B=321-537"/>
</dbReference>
<dbReference type="PDB" id="7EH5">
    <property type="method" value="EM"/>
    <property type="resolution" value="4.00 A"/>
    <property type="chains" value="A/B/C=1-1208"/>
</dbReference>
<dbReference type="PDB" id="7EJ4">
    <property type="method" value="EM"/>
    <property type="resolution" value="3.60 A"/>
    <property type="chains" value="A/B/C=1-1208"/>
</dbReference>
<dbReference type="PDB" id="7EJ5">
    <property type="method" value="EM"/>
    <property type="resolution" value="3.50 A"/>
    <property type="chains" value="A/B/C=1-1208"/>
</dbReference>
<dbReference type="PDB" id="7EJL">
    <property type="method" value="X-ray"/>
    <property type="resolution" value="1.89 A"/>
    <property type="chains" value="C=1208-1216"/>
</dbReference>
<dbReference type="PDB" id="7EJY">
    <property type="method" value="X-ray"/>
    <property type="resolution" value="3.04 A"/>
    <property type="chains" value="R=319-541"/>
</dbReference>
<dbReference type="PDB" id="7EJZ">
    <property type="method" value="X-ray"/>
    <property type="resolution" value="3.63 A"/>
    <property type="chains" value="R=319-541"/>
</dbReference>
<dbReference type="PDB" id="7EK0">
    <property type="method" value="X-ray"/>
    <property type="resolution" value="2.70 A"/>
    <property type="chains" value="R=319-541"/>
</dbReference>
<dbReference type="PDB" id="7EK6">
    <property type="method" value="X-ray"/>
    <property type="resolution" value="1.24 A"/>
    <property type="chains" value="A=906-957, B=1175-1211"/>
</dbReference>
<dbReference type="PDB" id="7EKC">
    <property type="method" value="X-ray"/>
    <property type="resolution" value="2.80 A"/>
    <property type="chains" value="B=319-541"/>
</dbReference>
<dbReference type="PDB" id="7EKE">
    <property type="method" value="X-ray"/>
    <property type="resolution" value="2.70 A"/>
    <property type="chains" value="B=319-541"/>
</dbReference>
<dbReference type="PDB" id="7EKF">
    <property type="method" value="X-ray"/>
    <property type="resolution" value="2.85 A"/>
    <property type="chains" value="B=319-541"/>
</dbReference>
<dbReference type="PDB" id="7EKG">
    <property type="method" value="X-ray"/>
    <property type="resolution" value="2.63 A"/>
    <property type="chains" value="B=319-541"/>
</dbReference>
<dbReference type="PDB" id="7EKH">
    <property type="method" value="X-ray"/>
    <property type="resolution" value="2.40 A"/>
    <property type="chains" value="B=319-541"/>
</dbReference>
<dbReference type="PDB" id="7ENF">
    <property type="method" value="EM"/>
    <property type="resolution" value="2.76 A"/>
    <property type="chains" value="A/B/C=1-1208"/>
</dbReference>
<dbReference type="PDB" id="7ENG">
    <property type="method" value="EM"/>
    <property type="resolution" value="3.59 A"/>
    <property type="chains" value="B=1-1208"/>
</dbReference>
<dbReference type="PDB" id="7EPX">
    <property type="method" value="EM"/>
    <property type="resolution" value="3.00 A"/>
    <property type="chains" value="A/B/C=1-1273"/>
</dbReference>
<dbReference type="PDB" id="7EU2">
    <property type="method" value="X-ray"/>
    <property type="resolution" value="2.80 A"/>
    <property type="chains" value="C/F=417-425"/>
</dbReference>
<dbReference type="PDB" id="7EY0">
    <property type="method" value="EM"/>
    <property type="resolution" value="3.20 A"/>
    <property type="chains" value="N/R=1-1207"/>
</dbReference>
<dbReference type="PDB" id="7EY4">
    <property type="method" value="EM"/>
    <property type="resolution" value="3.69 A"/>
    <property type="chains" value="N=1-290, R=1-1207"/>
</dbReference>
<dbReference type="PDB" id="7EY5">
    <property type="method" value="EM"/>
    <property type="resolution" value="3.40 A"/>
    <property type="chains" value="A=1-1208"/>
</dbReference>
<dbReference type="PDB" id="7EYA">
    <property type="method" value="EM"/>
    <property type="resolution" value="3.77 A"/>
    <property type="chains" value="N=1-290, R=1-1208"/>
</dbReference>
<dbReference type="PDB" id="7EZV">
    <property type="method" value="EM"/>
    <property type="resolution" value="3.30 A"/>
    <property type="chains" value="A=1-1208"/>
</dbReference>
<dbReference type="PDB" id="7F0X">
    <property type="method" value="X-ray"/>
    <property type="resolution" value="2.80 A"/>
    <property type="chains" value="A=334-527"/>
</dbReference>
<dbReference type="PDB" id="7F12">
    <property type="method" value="X-ray"/>
    <property type="resolution" value="3.15 A"/>
    <property type="chains" value="A=334-528"/>
</dbReference>
<dbReference type="PDB" id="7F15">
    <property type="method" value="X-ray"/>
    <property type="resolution" value="2.65 A"/>
    <property type="chains" value="A=334-530"/>
</dbReference>
<dbReference type="PDB" id="7F3Q">
    <property type="method" value="EM"/>
    <property type="resolution" value="3.30 A"/>
    <property type="chains" value="A=1-1273"/>
</dbReference>
<dbReference type="PDB" id="7F46">
    <property type="method" value="EM"/>
    <property type="resolution" value="4.79 A"/>
    <property type="chains" value="B/C=1-1208"/>
</dbReference>
<dbReference type="PDB" id="7F4W">
    <property type="method" value="X-ray"/>
    <property type="resolution" value="2.90 A"/>
    <property type="chains" value="E/F=448-456"/>
</dbReference>
<dbReference type="PDB" id="7F5G">
    <property type="method" value="X-ray"/>
    <property type="resolution" value="1.75 A"/>
    <property type="chains" value="A/C=330-531"/>
</dbReference>
<dbReference type="PDB" id="7F5H">
    <property type="method" value="X-ray"/>
    <property type="resolution" value="3.00 A"/>
    <property type="chains" value="A/B=330-531"/>
</dbReference>
<dbReference type="PDB" id="7F5R">
    <property type="method" value="X-ray"/>
    <property type="resolution" value="3.01 A"/>
    <property type="chains" value="C/E/F=333-527"/>
</dbReference>
<dbReference type="PDB" id="7F62">
    <property type="method" value="EM"/>
    <property type="resolution" value="3.60 A"/>
    <property type="chains" value="A=1-1208"/>
</dbReference>
<dbReference type="PDB" id="7F63">
    <property type="method" value="EM"/>
    <property type="resolution" value="3.90 A"/>
    <property type="chains" value="A=1-1208"/>
</dbReference>
<dbReference type="PDB" id="7F6Y">
    <property type="method" value="X-ray"/>
    <property type="resolution" value="3.00 A"/>
    <property type="chains" value="R=319-541"/>
</dbReference>
<dbReference type="PDB" id="7F6Z">
    <property type="method" value="X-ray"/>
    <property type="resolution" value="3.00 A"/>
    <property type="chains" value="R=319-541"/>
</dbReference>
<dbReference type="PDB" id="7F7E">
    <property type="method" value="X-ray"/>
    <property type="resolution" value="2.49 A"/>
    <property type="chains" value="E=333-527"/>
</dbReference>
<dbReference type="PDB" id="7F7H">
    <property type="method" value="X-ray"/>
    <property type="resolution" value="3.19 A"/>
    <property type="chains" value="E/F=334-515"/>
</dbReference>
<dbReference type="PDB" id="7FAE">
    <property type="method" value="EM"/>
    <property type="resolution" value="3.65 A"/>
    <property type="chains" value="A/B/C=1-1208"/>
</dbReference>
<dbReference type="PDB" id="7FAF">
    <property type="method" value="EM"/>
    <property type="resolution" value="3.69 A"/>
    <property type="chains" value="A/B/C=1-1208"/>
</dbReference>
<dbReference type="PDB" id="7FAT">
    <property type="method" value="X-ray"/>
    <property type="resolution" value="1.99 A"/>
    <property type="chains" value="A=333-523"/>
</dbReference>
<dbReference type="PDB" id="7FAU">
    <property type="method" value="X-ray"/>
    <property type="resolution" value="2.08 A"/>
    <property type="chains" value="A/C=333-523"/>
</dbReference>
<dbReference type="PDB" id="7FB0">
    <property type="method" value="EM"/>
    <property type="resolution" value="3.40 A"/>
    <property type="chains" value="A/B/C=1-1208"/>
</dbReference>
<dbReference type="PDB" id="7FB1">
    <property type="method" value="EM"/>
    <property type="resolution" value="3.70 A"/>
    <property type="chains" value="A/B/C=1-1208"/>
</dbReference>
<dbReference type="PDB" id="7FB3">
    <property type="method" value="EM"/>
    <property type="resolution" value="3.10 A"/>
    <property type="chains" value="A/B/C=1-1208"/>
</dbReference>
<dbReference type="PDB" id="7FB4">
    <property type="method" value="EM"/>
    <property type="resolution" value="3.40 A"/>
    <property type="chains" value="A/B/C=1-1208"/>
</dbReference>
<dbReference type="PDB" id="7FBJ">
    <property type="method" value="X-ray"/>
    <property type="resolution" value="2.85 A"/>
    <property type="chains" value="A/C/E/G/I/K/M/O=332-527"/>
</dbReference>
<dbReference type="PDB" id="7FBK">
    <property type="method" value="X-ray"/>
    <property type="resolution" value="1.90 A"/>
    <property type="chains" value="A/B=332-527"/>
</dbReference>
<dbReference type="PDB" id="7FC5">
    <property type="method" value="X-ray"/>
    <property type="resolution" value="2.89 A"/>
    <property type="chains" value="E=333-529"/>
</dbReference>
<dbReference type="PDB" id="7FCD">
    <property type="method" value="EM"/>
    <property type="resolution" value="3.90 A"/>
    <property type="chains" value="A/B/C=1-1208"/>
</dbReference>
<dbReference type="PDB" id="7FCE">
    <property type="method" value="EM"/>
    <property type="resolution" value="3.10 A"/>
    <property type="chains" value="A/B/C=1-1208"/>
</dbReference>
<dbReference type="PDB" id="7FCP">
    <property type="method" value="X-ray"/>
    <property type="resolution" value="2.40 A"/>
    <property type="chains" value="A=321-591"/>
</dbReference>
<dbReference type="PDB" id="7FCQ">
    <property type="method" value="X-ray"/>
    <property type="resolution" value="1.89 A"/>
    <property type="chains" value="A=332-528"/>
</dbReference>
<dbReference type="PDB" id="7FDG">
    <property type="method" value="EM"/>
    <property type="resolution" value="3.69 A"/>
    <property type="chains" value="E=333-526"/>
</dbReference>
<dbReference type="PDB" id="7FDH">
    <property type="method" value="EM"/>
    <property type="resolution" value="3.72 A"/>
    <property type="chains" value="E=333-526"/>
</dbReference>
<dbReference type="PDB" id="7FDI">
    <property type="method" value="EM"/>
    <property type="resolution" value="3.12 A"/>
    <property type="chains" value="E=333-526"/>
</dbReference>
<dbReference type="PDB" id="7FDK">
    <property type="method" value="EM"/>
    <property type="resolution" value="3.69 A"/>
    <property type="chains" value="E=333-526"/>
</dbReference>
<dbReference type="PDB" id="7FEM">
    <property type="method" value="EM"/>
    <property type="resolution" value="4.10 A"/>
    <property type="chains" value="A/B/C=15-1208"/>
</dbReference>
<dbReference type="PDB" id="7FET">
    <property type="method" value="EM"/>
    <property type="resolution" value="3.70 A"/>
    <property type="chains" value="A/B/C=15-1208"/>
</dbReference>
<dbReference type="PDB" id="7FG2">
    <property type="method" value="EM"/>
    <property type="resolution" value="4.40 A"/>
    <property type="chains" value="A=1-1273"/>
</dbReference>
<dbReference type="PDB" id="7FG3">
    <property type="method" value="EM"/>
    <property type="resolution" value="3.90 A"/>
    <property type="chains" value="A=1-1273"/>
</dbReference>
<dbReference type="PDB" id="7FG7">
    <property type="method" value="EM"/>
    <property type="resolution" value="6.90 A"/>
    <property type="chains" value="A=1-1273"/>
</dbReference>
<dbReference type="PDB" id="7FH0">
    <property type="method" value="X-ray"/>
    <property type="resolution" value="3.20 A"/>
    <property type="chains" value="A=309-537"/>
</dbReference>
<dbReference type="PDB" id="7FJC">
    <property type="method" value="X-ray"/>
    <property type="resolution" value="2.96 A"/>
    <property type="chains" value="E=333-519"/>
</dbReference>
<dbReference type="PDB" id="7FJN">
    <property type="method" value="EM"/>
    <property type="resolution" value="3.25 A"/>
    <property type="chains" value="A/B/C=16-1208"/>
</dbReference>
<dbReference type="PDB" id="7FJO">
    <property type="method" value="EM"/>
    <property type="resolution" value="3.34 A"/>
    <property type="chains" value="A/B/C=16-1208"/>
</dbReference>
<dbReference type="PDB" id="7FJS">
    <property type="method" value="X-ray"/>
    <property type="resolution" value="2.90 A"/>
    <property type="chains" value="B/E=333-527"/>
</dbReference>
<dbReference type="PDB" id="7JJC">
    <property type="method" value="X-ray"/>
    <property type="resolution" value="2.36 A"/>
    <property type="chains" value="E/F/G/H=679-685"/>
</dbReference>
<dbReference type="PDB" id="7JJI">
    <property type="method" value="EM"/>
    <property type="resolution" value="3.60 A"/>
    <property type="chains" value="A/B/C=1-1273"/>
</dbReference>
<dbReference type="PDB" id="7JJJ">
    <property type="method" value="EM"/>
    <property type="resolution" value="4.50 A"/>
    <property type="chains" value="A/B/C/D/E/F=1-1273"/>
</dbReference>
<dbReference type="PDB" id="7JMO">
    <property type="method" value="X-ray"/>
    <property type="resolution" value="2.36 A"/>
    <property type="chains" value="A=319-541"/>
</dbReference>
<dbReference type="PDB" id="7JMP">
    <property type="method" value="X-ray"/>
    <property type="resolution" value="1.71 A"/>
    <property type="chains" value="A=319-541"/>
</dbReference>
<dbReference type="PDB" id="7JMW">
    <property type="method" value="X-ray"/>
    <property type="resolution" value="2.89 A"/>
    <property type="chains" value="A=319-541"/>
</dbReference>
<dbReference type="PDB" id="7JV2">
    <property type="method" value="EM"/>
    <property type="resolution" value="3.50 A"/>
    <property type="chains" value="A=14-1211"/>
</dbReference>
<dbReference type="PDB" id="7JV4">
    <property type="method" value="EM"/>
    <property type="resolution" value="3.40 A"/>
    <property type="chains" value="A/B/C=14-1211"/>
</dbReference>
<dbReference type="PDB" id="7JV6">
    <property type="method" value="EM"/>
    <property type="resolution" value="3.00 A"/>
    <property type="chains" value="A/B/E=14-1211"/>
</dbReference>
<dbReference type="PDB" id="7JVA">
    <property type="method" value="EM"/>
    <property type="resolution" value="3.60 A"/>
    <property type="chains" value="A=14-1211"/>
</dbReference>
<dbReference type="PDB" id="7JVB">
    <property type="method" value="X-ray"/>
    <property type="resolution" value="3.29 A"/>
    <property type="chains" value="A/B=319-541"/>
</dbReference>
<dbReference type="PDB" id="7JVC">
    <property type="method" value="EM"/>
    <property type="resolution" value="3.30 A"/>
    <property type="chains" value="A/B/E=14-1211"/>
</dbReference>
<dbReference type="PDB" id="7JW0">
    <property type="method" value="EM"/>
    <property type="resolution" value="4.30 A"/>
    <property type="chains" value="A/B/E=14-1211"/>
</dbReference>
<dbReference type="PDB" id="7JWB">
    <property type="method" value="EM"/>
    <property type="resolution" value="6.00 A"/>
    <property type="chains" value="A/B/C=1-1208"/>
</dbReference>
<dbReference type="PDB" id="7JWY">
    <property type="method" value="EM"/>
    <property type="resolution" value="2.50 A"/>
    <property type="chains" value="A/B/C=14-1208"/>
</dbReference>
<dbReference type="PDB" id="7JX3">
    <property type="method" value="X-ray"/>
    <property type="resolution" value="2.65 A"/>
    <property type="chains" value="R=328-531"/>
</dbReference>
<dbReference type="PDB" id="7JZL">
    <property type="method" value="EM"/>
    <property type="resolution" value="2.70 A"/>
    <property type="chains" value="A/B/C=1-1208"/>
</dbReference>
<dbReference type="PDB" id="7JZM">
    <property type="method" value="EM"/>
    <property type="resolution" value="3.50 A"/>
    <property type="chains" value="B=1-1208"/>
</dbReference>
<dbReference type="PDB" id="7JZN">
    <property type="method" value="EM"/>
    <property type="resolution" value="3.10 A"/>
    <property type="chains" value="A/B/C=1-1208"/>
</dbReference>
<dbReference type="PDB" id="7JZU">
    <property type="method" value="EM"/>
    <property type="resolution" value="3.10 A"/>
    <property type="chains" value="B=1-1208"/>
</dbReference>
<dbReference type="PDB" id="7K43">
    <property type="method" value="EM"/>
    <property type="resolution" value="2.60 A"/>
    <property type="chains" value="A/B/E=14-1211"/>
</dbReference>
<dbReference type="PDB" id="7K45">
    <property type="method" value="EM"/>
    <property type="resolution" value="3.70 A"/>
    <property type="chains" value="B=1-1208"/>
</dbReference>
<dbReference type="PDB" id="7K4N">
    <property type="method" value="EM"/>
    <property type="resolution" value="3.30 A"/>
    <property type="chains" value="A/B/E=1-1208"/>
</dbReference>
<dbReference type="PDB" id="7K8M">
    <property type="method" value="X-ray"/>
    <property type="resolution" value="3.20 A"/>
    <property type="chains" value="E=331-517"/>
</dbReference>
<dbReference type="PDB" id="7K8S">
    <property type="method" value="EM"/>
    <property type="resolution" value="3.40 A"/>
    <property type="chains" value="A/B/C=1-1213"/>
</dbReference>
<dbReference type="PDB" id="7K8T">
    <property type="method" value="EM"/>
    <property type="resolution" value="3.40 A"/>
    <property type="chains" value="A/B/C=1-1213"/>
</dbReference>
<dbReference type="PDB" id="7K8U">
    <property type="method" value="EM"/>
    <property type="resolution" value="3.80 A"/>
    <property type="chains" value="A/B/C=1-1213"/>
</dbReference>
<dbReference type="PDB" id="7K8V">
    <property type="method" value="EM"/>
    <property type="resolution" value="3.80 A"/>
    <property type="chains" value="A/B/C=1-1213"/>
</dbReference>
<dbReference type="PDB" id="7K8W">
    <property type="method" value="EM"/>
    <property type="resolution" value="3.60 A"/>
    <property type="chains" value="A/B/G=1-1213"/>
</dbReference>
<dbReference type="PDB" id="7K8X">
    <property type="method" value="EM"/>
    <property type="resolution" value="3.90 A"/>
    <property type="chains" value="A/B/C=1-1213"/>
</dbReference>
<dbReference type="PDB" id="7K8Y">
    <property type="method" value="EM"/>
    <property type="resolution" value="4.40 A"/>
    <property type="chains" value="B/D/E=1-1213"/>
</dbReference>
<dbReference type="PDB" id="7K8Z">
    <property type="method" value="EM"/>
    <property type="resolution" value="3.50 A"/>
    <property type="chains" value="A/B/C=1-1213"/>
</dbReference>
<dbReference type="PDB" id="7K90">
    <property type="method" value="EM"/>
    <property type="resolution" value="3.24 A"/>
    <property type="chains" value="A/B/C=1-1208"/>
</dbReference>
<dbReference type="PDB" id="7K9H">
    <property type="method" value="EM"/>
    <property type="resolution" value="3.20 A"/>
    <property type="chains" value="A/B/C=1-1213"/>
</dbReference>
<dbReference type="PDB" id="7K9I">
    <property type="method" value="EM"/>
    <property type="resolution" value="3.30 A"/>
    <property type="chains" value="A=333-527"/>
</dbReference>
<dbReference type="PDB" id="7K9J">
    <property type="method" value="EM"/>
    <property type="resolution" value="3.00 A"/>
    <property type="chains" value="A/B/C=1-1213"/>
</dbReference>
<dbReference type="PDB" id="7K9K">
    <property type="method" value="EM"/>
    <property type="resolution" value="3.14 A"/>
    <property type="chains" value="A=333-527"/>
</dbReference>
<dbReference type="PDB" id="7K9Z">
    <property type="method" value="X-ray"/>
    <property type="resolution" value="2.95 A"/>
    <property type="chains" value="E=319-541"/>
</dbReference>
<dbReference type="PDB" id="7KDG">
    <property type="method" value="EM"/>
    <property type="resolution" value="3.01 A"/>
    <property type="chains" value="A/B/C=1-1208"/>
</dbReference>
<dbReference type="PDB" id="7KDH">
    <property type="method" value="EM"/>
    <property type="resolution" value="3.33 A"/>
    <property type="chains" value="A/B/C=1-1208"/>
</dbReference>
<dbReference type="PDB" id="7KDI">
    <property type="method" value="EM"/>
    <property type="resolution" value="3.26 A"/>
    <property type="chains" value="A/B/C=1-1208"/>
</dbReference>
<dbReference type="PDB" id="7KDJ">
    <property type="method" value="EM"/>
    <property type="resolution" value="3.49 A"/>
    <property type="chains" value="A/B/C=1-1208"/>
</dbReference>
<dbReference type="PDB" id="7KDK">
    <property type="method" value="EM"/>
    <property type="resolution" value="2.80 A"/>
    <property type="chains" value="A/B/C=1-1208"/>
</dbReference>
<dbReference type="PDB" id="7KDL">
    <property type="method" value="EM"/>
    <property type="resolution" value="2.96 A"/>
    <property type="chains" value="A/B/C=1-1208"/>
</dbReference>
<dbReference type="PDB" id="7KE4">
    <property type="method" value="EM"/>
    <property type="resolution" value="3.21 A"/>
    <property type="chains" value="A/B/C=1-1208"/>
</dbReference>
<dbReference type="PDB" id="7KE6">
    <property type="method" value="EM"/>
    <property type="resolution" value="3.10 A"/>
    <property type="chains" value="A/B/C=1-1208"/>
</dbReference>
<dbReference type="PDB" id="7KE7">
    <property type="method" value="EM"/>
    <property type="resolution" value="3.32 A"/>
    <property type="chains" value="A/B/C=1-1208"/>
</dbReference>
<dbReference type="PDB" id="7KE8">
    <property type="method" value="EM"/>
    <property type="resolution" value="3.26 A"/>
    <property type="chains" value="A/B/C=1-1208"/>
</dbReference>
<dbReference type="PDB" id="7KE9">
    <property type="method" value="EM"/>
    <property type="resolution" value="3.08 A"/>
    <property type="chains" value="A/B/C=1-1208"/>
</dbReference>
<dbReference type="PDB" id="7KEA">
    <property type="method" value="EM"/>
    <property type="resolution" value="3.33 A"/>
    <property type="chains" value="A/B/C=1-1208"/>
</dbReference>
<dbReference type="PDB" id="7KEB">
    <property type="method" value="EM"/>
    <property type="resolution" value="3.48 A"/>
    <property type="chains" value="A/B/C=1-1208"/>
</dbReference>
<dbReference type="PDB" id="7KEC">
    <property type="method" value="EM"/>
    <property type="resolution" value="3.84 A"/>
    <property type="chains" value="A/B/C=1-1208"/>
</dbReference>
<dbReference type="PDB" id="7KFV">
    <property type="method" value="X-ray"/>
    <property type="resolution" value="2.10 A"/>
    <property type="chains" value="A/B/E=319-541"/>
</dbReference>
<dbReference type="PDB" id="7KFW">
    <property type="method" value="X-ray"/>
    <property type="resolution" value="2.79 A"/>
    <property type="chains" value="A/B/E=319-541"/>
</dbReference>
<dbReference type="PDB" id="7KFX">
    <property type="method" value="X-ray"/>
    <property type="resolution" value="2.23 A"/>
    <property type="chains" value="A=319-541"/>
</dbReference>
<dbReference type="PDB" id="7KFY">
    <property type="method" value="X-ray"/>
    <property type="resolution" value="2.16 A"/>
    <property type="chains" value="A=319-541"/>
</dbReference>
<dbReference type="PDB" id="7KGJ">
    <property type="method" value="X-ray"/>
    <property type="resolution" value="2.30 A"/>
    <property type="chains" value="A=333-528"/>
</dbReference>
<dbReference type="PDB" id="7KGK">
    <property type="method" value="X-ray"/>
    <property type="resolution" value="2.60 A"/>
    <property type="chains" value="A=333-527"/>
</dbReference>
<dbReference type="PDB" id="7KJ2">
    <property type="method" value="EM"/>
    <property type="resolution" value="3.60 A"/>
    <property type="chains" value="A/B/C=14-1208"/>
</dbReference>
<dbReference type="PDB" id="7KJ3">
    <property type="method" value="EM"/>
    <property type="resolution" value="3.70 A"/>
    <property type="chains" value="A/B/C=14-1208"/>
</dbReference>
<dbReference type="PDB" id="7KJ4">
    <property type="method" value="EM"/>
    <property type="resolution" value="3.40 A"/>
    <property type="chains" value="A/B/C=14-1208"/>
</dbReference>
<dbReference type="PDB" id="7KJ5">
    <property type="method" value="EM"/>
    <property type="resolution" value="3.60 A"/>
    <property type="chains" value="A/B/C=14-1208"/>
</dbReference>
<dbReference type="PDB" id="7KKK">
    <property type="method" value="EM"/>
    <property type="resolution" value="3.03 A"/>
    <property type="chains" value="A/C/E=1-1208"/>
</dbReference>
<dbReference type="PDB" id="7KKL">
    <property type="method" value="EM"/>
    <property type="resolution" value="2.85 A"/>
    <property type="chains" value="A/C/D=1-1208"/>
</dbReference>
<dbReference type="PDB" id="7KL9">
    <property type="method" value="EM"/>
    <property type="resolution" value="4.10 A"/>
    <property type="chains" value="A/B/C=1-1208"/>
</dbReference>
<dbReference type="PDB" id="7KLG">
    <property type="method" value="X-ray"/>
    <property type="resolution" value="3.20 A"/>
    <property type="chains" value="A/B=328-528"/>
</dbReference>
<dbReference type="PDB" id="7KLH">
    <property type="method" value="X-ray"/>
    <property type="resolution" value="3.00 A"/>
    <property type="chains" value="A/B=328-528"/>
</dbReference>
<dbReference type="PDB" id="7KLW">
    <property type="method" value="X-ray"/>
    <property type="resolution" value="2.60 A"/>
    <property type="chains" value="A=334-527"/>
</dbReference>
<dbReference type="PDB" id="7KM5">
    <property type="method" value="X-ray"/>
    <property type="resolution" value="3.19 A"/>
    <property type="chains" value="A/B=319-535"/>
</dbReference>
<dbReference type="PDB" id="7KMB">
    <property type="method" value="EM"/>
    <property type="resolution" value="3.39 A"/>
    <property type="chains" value="G=16-1208"/>
</dbReference>
<dbReference type="PDB" id="7KMG">
    <property type="method" value="X-ray"/>
    <property type="resolution" value="2.16 A"/>
    <property type="chains" value="C/F=329-527"/>
</dbReference>
<dbReference type="PDB" id="7KMH">
    <property type="method" value="X-ray"/>
    <property type="resolution" value="1.72 A"/>
    <property type="chains" value="C=329-527"/>
</dbReference>
<dbReference type="PDB" id="7KMI">
    <property type="method" value="X-ray"/>
    <property type="resolution" value="1.73 A"/>
    <property type="chains" value="C=329-527"/>
</dbReference>
<dbReference type="PDB" id="7KMK">
    <property type="method" value="EM"/>
    <property type="resolution" value="4.20 A"/>
    <property type="chains" value="A/B/C=1-1211"/>
</dbReference>
<dbReference type="PDB" id="7KML">
    <property type="method" value="EM"/>
    <property type="resolution" value="3.80 A"/>
    <property type="chains" value="A/B/C=1-1211"/>
</dbReference>
<dbReference type="PDB" id="7KMS">
    <property type="method" value="EM"/>
    <property type="resolution" value="3.64 A"/>
    <property type="chains" value="A/B/C=1-1208"/>
</dbReference>
<dbReference type="PDB" id="7KMZ">
    <property type="method" value="EM"/>
    <property type="resolution" value="3.62 A"/>
    <property type="chains" value="A/B/C=1-1208"/>
</dbReference>
<dbReference type="PDB" id="7KN3">
    <property type="method" value="X-ray"/>
    <property type="resolution" value="2.25 A"/>
    <property type="chains" value="A/B=319-541"/>
</dbReference>
<dbReference type="PDB" id="7KN4">
    <property type="method" value="X-ray"/>
    <property type="resolution" value="2.70 A"/>
    <property type="chains" value="A/B=319-541"/>
</dbReference>
<dbReference type="PDB" id="7KN5">
    <property type="method" value="X-ray"/>
    <property type="resolution" value="1.87 A"/>
    <property type="chains" value="A/B=319-541"/>
</dbReference>
<dbReference type="PDB" id="7KN6">
    <property type="method" value="X-ray"/>
    <property type="resolution" value="2.55 A"/>
    <property type="chains" value="A=319-541"/>
</dbReference>
<dbReference type="PDB" id="7KN7">
    <property type="method" value="X-ray"/>
    <property type="resolution" value="2.73 A"/>
    <property type="chains" value="A=319-541"/>
</dbReference>
<dbReference type="PDB" id="7KNB">
    <property type="method" value="EM"/>
    <property type="resolution" value="3.93 A"/>
    <property type="chains" value="A/B/C=1-1208"/>
</dbReference>
<dbReference type="PDB" id="7KNE">
    <property type="method" value="EM"/>
    <property type="resolution" value="3.85 A"/>
    <property type="chains" value="A/B/C=1-1208"/>
</dbReference>
<dbReference type="PDB" id="7KNH">
    <property type="method" value="EM"/>
    <property type="resolution" value="3.74 A"/>
    <property type="chains" value="A/B/C=1-1208"/>
</dbReference>
<dbReference type="PDB" id="7KNI">
    <property type="method" value="EM"/>
    <property type="resolution" value="3.91 A"/>
    <property type="chains" value="A/B/C=1-1208"/>
</dbReference>
<dbReference type="PDB" id="7KQB">
    <property type="method" value="EM"/>
    <property type="resolution" value="2.42 A"/>
    <property type="chains" value="A/B/C=1-1208"/>
</dbReference>
<dbReference type="PDB" id="7KQE">
    <property type="method" value="EM"/>
    <property type="resolution" value="2.88 A"/>
    <property type="chains" value="A/B/C=1-1208"/>
</dbReference>
<dbReference type="PDB" id="7KRQ">
    <property type="method" value="EM"/>
    <property type="resolution" value="3.44 A"/>
    <property type="chains" value="A/B/C=1-1273"/>
</dbReference>
<dbReference type="PDB" id="7KRR">
    <property type="method" value="EM"/>
    <property type="resolution" value="3.50 A"/>
    <property type="chains" value="A/B/C=1-1273"/>
</dbReference>
<dbReference type="PDB" id="7KRS">
    <property type="method" value="EM"/>
    <property type="resolution" value="3.20 A"/>
    <property type="chains" value="A/B/C=1-1273"/>
</dbReference>
<dbReference type="PDB" id="7KS9">
    <property type="method" value="EM"/>
    <property type="resolution" value="4.75 A"/>
    <property type="chains" value="A/B/C=1-1208"/>
</dbReference>
<dbReference type="PDB" id="7KSG">
    <property type="method" value="EM"/>
    <property type="resolution" value="3.33 A"/>
    <property type="chains" value="A/B/C=1-1208"/>
</dbReference>
<dbReference type="PDB" id="7KXJ">
    <property type="method" value="EM"/>
    <property type="resolution" value="6.40 A"/>
    <property type="chains" value="A/B/C=1-1211"/>
</dbReference>
<dbReference type="PDB" id="7KXK">
    <property type="method" value="EM"/>
    <property type="resolution" value="5.00 A"/>
    <property type="chains" value="A/B/C=1-1211"/>
</dbReference>
<dbReference type="PDB" id="7KZB">
    <property type="method" value="X-ray"/>
    <property type="resolution" value="2.83 A"/>
    <property type="chains" value="C=333-528"/>
</dbReference>
<dbReference type="PDB" id="7L02">
    <property type="method" value="EM"/>
    <property type="resolution" value="3.20 A"/>
    <property type="chains" value="A/B/C=27-1147"/>
</dbReference>
<dbReference type="PDB" id="7L06">
    <property type="method" value="EM"/>
    <property type="resolution" value="3.30 A"/>
    <property type="chains" value="A/B/C=27-1147"/>
</dbReference>
<dbReference type="PDB" id="7L09">
    <property type="method" value="EM"/>
    <property type="resolution" value="3.10 A"/>
    <property type="chains" value="A/B/C=27-1147"/>
</dbReference>
<dbReference type="PDB" id="7L0N">
    <property type="method" value="X-ray"/>
    <property type="resolution" value="2.78 A"/>
    <property type="chains" value="R/S=328-531"/>
</dbReference>
<dbReference type="PDB" id="7L2C">
    <property type="method" value="X-ray"/>
    <property type="resolution" value="3.65 A"/>
    <property type="chains" value="A/B=1-334"/>
</dbReference>
<dbReference type="PDB" id="7L2D">
    <property type="method" value="EM"/>
    <property type="resolution" value="3.55 A"/>
    <property type="chains" value="A/B/C=1-1208"/>
</dbReference>
<dbReference type="PDB" id="7L2E">
    <property type="method" value="EM"/>
    <property type="resolution" value="2.97 A"/>
    <property type="chains" value="A/B/C=1-1208"/>
</dbReference>
<dbReference type="PDB" id="7L2F">
    <property type="method" value="EM"/>
    <property type="resolution" value="3.90 A"/>
    <property type="chains" value="A/B/C=1-1208"/>
</dbReference>
<dbReference type="PDB" id="7L3N">
    <property type="method" value="EM"/>
    <property type="resolution" value="3.27 A"/>
    <property type="chains" value="A/B/C=13-1208"/>
</dbReference>
<dbReference type="PDB" id="7L4Z">
    <property type="method" value="X-ray"/>
    <property type="resolution" value="3.96 A"/>
    <property type="chains" value="A/B/C/D/E=319-541"/>
</dbReference>
<dbReference type="PDB" id="7L56">
    <property type="method" value="EM"/>
    <property type="resolution" value="3.60 A"/>
    <property type="chains" value="A/B/C=1-1208"/>
</dbReference>
<dbReference type="PDB" id="7L57">
    <property type="method" value="EM"/>
    <property type="resolution" value="5.87 A"/>
    <property type="chains" value="A/B/C=1-1208"/>
</dbReference>
<dbReference type="PDB" id="7L58">
    <property type="method" value="EM"/>
    <property type="resolution" value="5.07 A"/>
    <property type="chains" value="A/B/C=1-1208"/>
</dbReference>
<dbReference type="PDB" id="7L5B">
    <property type="method" value="X-ray"/>
    <property type="resolution" value="3.18 A"/>
    <property type="chains" value="A=319-537"/>
</dbReference>
<dbReference type="PDB" id="7L7D">
    <property type="method" value="X-ray"/>
    <property type="resolution" value="2.50 A"/>
    <property type="chains" value="E=330-529"/>
</dbReference>
<dbReference type="PDB" id="7L7E">
    <property type="method" value="X-ray"/>
    <property type="resolution" value="3.00 A"/>
    <property type="chains" value="G/K/S/b=330-529"/>
</dbReference>
<dbReference type="PDB" id="7L7F">
    <property type="method" value="EM"/>
    <property type="resolution" value="3.24 A"/>
    <property type="chains" value="E/F=323-528"/>
</dbReference>
<dbReference type="PDB" id="7L7K">
    <property type="method" value="EM"/>
    <property type="resolution" value="3.29 A"/>
    <property type="chains" value="A/B/C=1-1273"/>
</dbReference>
<dbReference type="PDB" id="7LAA">
    <property type="method" value="EM"/>
    <property type="resolution" value="3.42 A"/>
    <property type="chains" value="A/B/C=27-1147"/>
</dbReference>
<dbReference type="PDB" id="7LAB">
    <property type="method" value="EM"/>
    <property type="resolution" value="2.97 A"/>
    <property type="chains" value="A/B/C=27-1147"/>
</dbReference>
<dbReference type="PDB" id="7LC8">
    <property type="method" value="NMR"/>
    <property type="chains" value="A/B/C=1217-1237"/>
</dbReference>
<dbReference type="PDB" id="7LCN">
    <property type="method" value="EM"/>
    <property type="resolution" value="3.35 A"/>
    <property type="chains" value="A/C/K=27-1147"/>
</dbReference>
<dbReference type="PDB" id="7LD1">
    <property type="method" value="EM"/>
    <property type="resolution" value="3.40 A"/>
    <property type="chains" value="A/B/C=27-1147"/>
</dbReference>
<dbReference type="PDB" id="7LDJ">
    <property type="method" value="X-ray"/>
    <property type="resolution" value="2.36 A"/>
    <property type="chains" value="A/B/C/D=331-527"/>
</dbReference>
<dbReference type="PDB" id="7LJR">
    <property type="method" value="EM"/>
    <property type="resolution" value="3.66 A"/>
    <property type="chains" value="A/B/C=1-1208"/>
</dbReference>
<dbReference type="PDB" id="7LM8">
    <property type="method" value="X-ray"/>
    <property type="resolution" value="1.94 A"/>
    <property type="chains" value="A=319-541"/>
</dbReference>
<dbReference type="PDB" id="7LO4">
    <property type="method" value="X-ray"/>
    <property type="resolution" value="2.46 A"/>
    <property type="chains" value="B=333-530"/>
</dbReference>
<dbReference type="PDB" id="7LOP">
    <property type="method" value="X-ray"/>
    <property type="resolution" value="2.25 A"/>
    <property type="chains" value="A/Z=319-541"/>
</dbReference>
<dbReference type="PDB" id="7LQ7">
    <property type="method" value="X-ray"/>
    <property type="resolution" value="3.40 A"/>
    <property type="chains" value="A/B/E=333-530"/>
</dbReference>
<dbReference type="PDB" id="7LQV">
    <property type="method" value="EM"/>
    <property type="resolution" value="3.25 A"/>
    <property type="chains" value="A/B/C=14-1208"/>
</dbReference>
<dbReference type="PDB" id="7LQW">
    <property type="method" value="EM"/>
    <property type="resolution" value="4.47 A"/>
    <property type="chains" value="A/B/C=14-1208"/>
</dbReference>
<dbReference type="PDB" id="7LRS">
    <property type="method" value="EM"/>
    <property type="resolution" value="3.89 A"/>
    <property type="chains" value="C=332-527"/>
</dbReference>
<dbReference type="PDB" id="7LRT">
    <property type="method" value="EM"/>
    <property type="resolution" value="3.54 A"/>
    <property type="chains" value="A/B/C=14-1208"/>
</dbReference>
<dbReference type="PDB" id="7LS9">
    <property type="method" value="EM"/>
    <property type="resolution" value="3.42 A"/>
    <property type="chains" value="A/B/C=1-1208"/>
</dbReference>
<dbReference type="PDB" id="7LSS">
    <property type="method" value="EM"/>
    <property type="resolution" value="3.72 A"/>
    <property type="chains" value="A/B/C=1-1208"/>
</dbReference>
<dbReference type="PDB" id="7LWI">
    <property type="method" value="EM"/>
    <property type="resolution" value="3.07 A"/>
    <property type="chains" value="A/B/C=1-1208"/>
</dbReference>
<dbReference type="PDB" id="7LWJ">
    <property type="method" value="EM"/>
    <property type="resolution" value="3.24 A"/>
    <property type="chains" value="A/B/C=1-1208"/>
</dbReference>
<dbReference type="PDB" id="7LWK">
    <property type="method" value="EM"/>
    <property type="resolution" value="2.92 A"/>
    <property type="chains" value="A/B/C=1-1208"/>
</dbReference>
<dbReference type="PDB" id="7LWL">
    <property type="method" value="EM"/>
    <property type="resolution" value="2.84 A"/>
    <property type="chains" value="A/B/C=1-1208"/>
</dbReference>
<dbReference type="PDB" id="7LWM">
    <property type="method" value="EM"/>
    <property type="resolution" value="2.83 A"/>
    <property type="chains" value="A/B/C=1-1208"/>
</dbReference>
<dbReference type="PDB" id="7LWN">
    <property type="method" value="EM"/>
    <property type="resolution" value="2.94 A"/>
    <property type="chains" value="A/B/C=1-1208"/>
</dbReference>
<dbReference type="PDB" id="7LWO">
    <property type="method" value="EM"/>
    <property type="resolution" value="2.85 A"/>
    <property type="chains" value="A/B/C=1-1208"/>
</dbReference>
<dbReference type="PDB" id="7LWP">
    <property type="method" value="EM"/>
    <property type="resolution" value="3.01 A"/>
    <property type="chains" value="A/B/C=1-1208"/>
</dbReference>
<dbReference type="PDB" id="7LWQ">
    <property type="method" value="EM"/>
    <property type="resolution" value="3.44 A"/>
    <property type="chains" value="A/B/C=1-1208"/>
</dbReference>
<dbReference type="PDB" id="7LWS">
    <property type="method" value="EM"/>
    <property type="resolution" value="3.22 A"/>
    <property type="chains" value="A/B/C=1-1208"/>
</dbReference>
<dbReference type="PDB" id="7LWT">
    <property type="method" value="EM"/>
    <property type="resolution" value="3.19 A"/>
    <property type="chains" value="A/B/C=1-1208"/>
</dbReference>
<dbReference type="PDB" id="7LWU">
    <property type="method" value="EM"/>
    <property type="resolution" value="3.22 A"/>
    <property type="chains" value="A/B/C=1-1208"/>
</dbReference>
<dbReference type="PDB" id="7LWV">
    <property type="method" value="EM"/>
    <property type="resolution" value="3.12 A"/>
    <property type="chains" value="A/B/C=1-1208"/>
</dbReference>
<dbReference type="PDB" id="7LWW">
    <property type="method" value="EM"/>
    <property type="resolution" value="3.00 A"/>
    <property type="chains" value="A/B/C=1-1208"/>
</dbReference>
<dbReference type="PDB" id="7LX5">
    <property type="method" value="EM"/>
    <property type="resolution" value="3.44 A"/>
    <property type="chains" value="B=1-1208"/>
</dbReference>
<dbReference type="PDB" id="7LXW">
    <property type="method" value="EM"/>
    <property type="resolution" value="2.80 A"/>
    <property type="chains" value="A=1-1208"/>
</dbReference>
<dbReference type="PDB" id="7LXX">
    <property type="method" value="EM"/>
    <property type="resolution" value="3.00 A"/>
    <property type="chains" value="A=1-1208"/>
</dbReference>
<dbReference type="PDB" id="7LXY">
    <property type="method" value="EM"/>
    <property type="resolution" value="2.20 A"/>
    <property type="chains" value="A/B/J=1-1208"/>
</dbReference>
<dbReference type="PDB" id="7LXZ">
    <property type="method" value="EM"/>
    <property type="resolution" value="2.60 A"/>
    <property type="chains" value="A/B/K=1-1208"/>
</dbReference>
<dbReference type="PDB" id="7LY0">
    <property type="method" value="EM"/>
    <property type="resolution" value="2.60 A"/>
    <property type="chains" value="A=1-1208"/>
</dbReference>
<dbReference type="PDB" id="7LY2">
    <property type="method" value="EM"/>
    <property type="resolution" value="2.50 A"/>
    <property type="chains" value="A/B/J=1-1208"/>
</dbReference>
<dbReference type="PDB" id="7LY3">
    <property type="method" value="X-ray"/>
    <property type="resolution" value="3.00 A"/>
    <property type="chains" value="A/B=14-307"/>
</dbReference>
<dbReference type="PDB" id="7LYK">
    <property type="method" value="EM"/>
    <property type="resolution" value="3.65 A"/>
    <property type="chains" value="A/B/C=1-1208"/>
</dbReference>
<dbReference type="PDB" id="7LYL">
    <property type="method" value="EM"/>
    <property type="resolution" value="3.72 A"/>
    <property type="chains" value="A/B/C=1-1208"/>
</dbReference>
<dbReference type="PDB" id="7LYM">
    <property type="method" value="EM"/>
    <property type="resolution" value="3.57 A"/>
    <property type="chains" value="A/B/C=1-1208"/>
</dbReference>
<dbReference type="PDB" id="7LYN">
    <property type="method" value="EM"/>
    <property type="resolution" value="3.32 A"/>
    <property type="chains" value="A/B/C=1-1208"/>
</dbReference>
<dbReference type="PDB" id="7LYO">
    <property type="method" value="EM"/>
    <property type="resolution" value="3.32 A"/>
    <property type="chains" value="A/B/C=1-1208"/>
</dbReference>
<dbReference type="PDB" id="7LYP">
    <property type="method" value="EM"/>
    <property type="resolution" value="4.05 A"/>
    <property type="chains" value="A/B/C=1-1208"/>
</dbReference>
<dbReference type="PDB" id="7LYQ">
    <property type="method" value="EM"/>
    <property type="resolution" value="3.34 A"/>
    <property type="chains" value="A/B/C=1-1208"/>
</dbReference>
<dbReference type="PDB" id="7M0J">
    <property type="method" value="EM"/>
    <property type="resolution" value="3.52 A"/>
    <property type="chains" value="A/B/C=16-1208"/>
</dbReference>
<dbReference type="PDB" id="7M3I">
    <property type="method" value="X-ray"/>
    <property type="resolution" value="2.80 A"/>
    <property type="chains" value="C/R=319-591"/>
</dbReference>
<dbReference type="PDB" id="7M42">
    <property type="method" value="EM"/>
    <property type="resolution" value="3.30 A"/>
    <property type="chains" value="E=319-541"/>
</dbReference>
<dbReference type="PDB" id="7M53">
    <property type="method" value="X-ray"/>
    <property type="resolution" value="1.40 A"/>
    <property type="chains" value="A=1146-1161"/>
</dbReference>
<dbReference type="PDB" id="7M6D">
    <property type="method" value="X-ray"/>
    <property type="resolution" value="3.10 A"/>
    <property type="chains" value="C=328-533"/>
</dbReference>
<dbReference type="PDB" id="7M6E">
    <property type="method" value="EM"/>
    <property type="resolution" value="3.30 A"/>
    <property type="chains" value="A/B/E=1-1208"/>
</dbReference>
<dbReference type="PDB" id="7M6F">
    <property type="method" value="EM"/>
    <property type="resolution" value="3.90 A"/>
    <property type="chains" value="A/B/E=1-1208"/>
</dbReference>
<dbReference type="PDB" id="7M6G">
    <property type="method" value="EM"/>
    <property type="resolution" value="3.70 A"/>
    <property type="chains" value="A/B/C=1-1208"/>
</dbReference>
<dbReference type="PDB" id="7M6H">
    <property type="method" value="EM"/>
    <property type="resolution" value="4.00 A"/>
    <property type="chains" value="A/B/C=1-1213"/>
</dbReference>
<dbReference type="PDB" id="7M6I">
    <property type="method" value="EM"/>
    <property type="resolution" value="4.00 A"/>
    <property type="chains" value="A/B/C=1-1213"/>
</dbReference>
<dbReference type="PDB" id="7M71">
    <property type="method" value="EM"/>
    <property type="resolution" value="2.66 A"/>
    <property type="chains" value="A/B=1-1208"/>
</dbReference>
<dbReference type="PDB" id="7M7B">
    <property type="method" value="EM"/>
    <property type="resolution" value="2.95 A"/>
    <property type="chains" value="A=1-1208"/>
</dbReference>
<dbReference type="PDB" id="7M7W">
    <property type="method" value="X-ray"/>
    <property type="resolution" value="2.65 A"/>
    <property type="chains" value="R/S=328-531"/>
</dbReference>
<dbReference type="PDB" id="7M8J">
    <property type="method" value="EM"/>
    <property type="resolution" value="3.48 A"/>
    <property type="chains" value="A=14-270"/>
</dbReference>
<dbReference type="PDB" id="7M8K">
    <property type="method" value="EM"/>
    <property type="chains" value="A/B/C=1-1208"/>
</dbReference>
<dbReference type="PDB" id="7M8S">
    <property type="method" value="X-ray"/>
    <property type="resolution" value="2.35 A"/>
    <property type="chains" value="C/F=386-395"/>
</dbReference>
<dbReference type="PDB" id="7M8T">
    <property type="method" value="X-ray"/>
    <property type="resolution" value="1.50 A"/>
    <property type="chains" value="C=370-378"/>
</dbReference>
<dbReference type="PDB" id="7M8U">
    <property type="method" value="X-ray"/>
    <property type="resolution" value="1.45 A"/>
    <property type="chains" value="C=896-904"/>
</dbReference>
<dbReference type="PDB" id="7MDW">
    <property type="method" value="EM"/>
    <property type="resolution" value="3.58 A"/>
    <property type="chains" value="R=333-526"/>
</dbReference>
<dbReference type="PDB" id="7ME7">
    <property type="method" value="EM"/>
    <property type="resolution" value="3.73 A"/>
    <property type="chains" value="R=333-526"/>
</dbReference>
<dbReference type="PDB" id="7MEJ">
    <property type="method" value="EM"/>
    <property type="resolution" value="3.55 A"/>
    <property type="chains" value="R=333-526"/>
</dbReference>
<dbReference type="PDB" id="7MF1">
    <property type="method" value="X-ray"/>
    <property type="resolution" value="2.09 A"/>
    <property type="chains" value="A=333-530"/>
</dbReference>
<dbReference type="PDB" id="7MFU">
    <property type="method" value="X-ray"/>
    <property type="resolution" value="1.70 A"/>
    <property type="chains" value="A/D=332-528"/>
</dbReference>
<dbReference type="PDB" id="7MJG">
    <property type="method" value="EM"/>
    <property type="resolution" value="2.81 A"/>
    <property type="chains" value="A/B/C=1-1208"/>
</dbReference>
<dbReference type="PDB" id="7MJH">
    <property type="method" value="EM"/>
    <property type="resolution" value="2.66 A"/>
    <property type="chains" value="A/B/C=1-1208"/>
</dbReference>
<dbReference type="PDB" id="7MJI">
    <property type="method" value="EM"/>
    <property type="resolution" value="2.81 A"/>
    <property type="chains" value="B=1-1208"/>
</dbReference>
<dbReference type="PDB" id="7MJJ">
    <property type="method" value="EM"/>
    <property type="resolution" value="3.32 A"/>
    <property type="chains" value="A/B/C=1-1208"/>
</dbReference>
<dbReference type="PDB" id="7MJK">
    <property type="method" value="EM"/>
    <property type="resolution" value="2.73 A"/>
    <property type="chains" value="A/B/C=1-1208"/>
</dbReference>
<dbReference type="PDB" id="7MJL">
    <property type="method" value="EM"/>
    <property type="resolution" value="2.95 A"/>
    <property type="chains" value="A=1-1208"/>
</dbReference>
<dbReference type="PDB" id="7MJM">
    <property type="method" value="EM"/>
    <property type="resolution" value="2.83 A"/>
    <property type="chains" value="A/B/C=1-1208"/>
</dbReference>
<dbReference type="PDB" id="7MJN">
    <property type="method" value="EM"/>
    <property type="resolution" value="3.29 A"/>
    <property type="chains" value="B=1-1208"/>
</dbReference>
<dbReference type="PDB" id="7MKB">
    <property type="method" value="X-ray"/>
    <property type="resolution" value="1.90 A"/>
    <property type="chains" value="C=269-277"/>
</dbReference>
<dbReference type="PDB" id="7MKL">
    <property type="method" value="EM"/>
    <property type="resolution" value="3.20 A"/>
    <property type="chains" value="A/B/C=27-1147"/>
</dbReference>
<dbReference type="PDB" id="7MKM">
    <property type="method" value="EM"/>
    <property type="resolution" value="3.16 A"/>
    <property type="chains" value="A=333-520"/>
</dbReference>
<dbReference type="PDB" id="7MLZ">
    <property type="method" value="EM"/>
    <property type="resolution" value="3.71 A"/>
    <property type="chains" value="A=331-527"/>
</dbReference>
<dbReference type="PDB" id="7MM0">
    <property type="method" value="EM"/>
    <property type="resolution" value="3.15 A"/>
    <property type="chains" value="A/B/C=14-1208"/>
</dbReference>
<dbReference type="PDB" id="7MMO">
    <property type="method" value="X-ray"/>
    <property type="resolution" value="2.43 A"/>
    <property type="chains" value="C/F=329-527"/>
</dbReference>
<dbReference type="PDB" id="7MSQ">
    <property type="method" value="X-ray"/>
    <property type="resolution" value="2.29 A"/>
    <property type="chains" value="A/B=333-528"/>
</dbReference>
<dbReference type="PDB" id="7MTC">
    <property type="method" value="EM"/>
    <property type="resolution" value="2.60 A"/>
    <property type="chains" value="A/B/C=14-1211"/>
</dbReference>
<dbReference type="PDB" id="7MTD">
    <property type="method" value="EM"/>
    <property type="resolution" value="3.50 A"/>
    <property type="chains" value="A/B/C=14-1211"/>
</dbReference>
<dbReference type="PDB" id="7MTE">
    <property type="method" value="EM"/>
    <property type="resolution" value="3.20 A"/>
    <property type="chains" value="A/B/C=14-1211"/>
</dbReference>
<dbReference type="PDB" id="7MW2">
    <property type="method" value="EM"/>
    <property type="resolution" value="2.97 A"/>
    <property type="chains" value="A/B/C=1-1208"/>
</dbReference>
<dbReference type="PDB" id="7MW3">
    <property type="method" value="EM"/>
    <property type="resolution" value="3.15 A"/>
    <property type="chains" value="A/B/C=1-1208"/>
</dbReference>
<dbReference type="PDB" id="7MW4">
    <property type="method" value="EM"/>
    <property type="resolution" value="3.42 A"/>
    <property type="chains" value="A/B/C=1-1208"/>
</dbReference>
<dbReference type="PDB" id="7MW5">
    <property type="method" value="EM"/>
    <property type="resolution" value="3.42 A"/>
    <property type="chains" value="A/B/C=1-1208"/>
</dbReference>
<dbReference type="PDB" id="7MW6">
    <property type="method" value="EM"/>
    <property type="resolution" value="3.22 A"/>
    <property type="chains" value="A/B/C=1-1208"/>
</dbReference>
<dbReference type="PDB" id="7MXP">
    <property type="method" value="EM"/>
    <property type="resolution" value="4.46 A"/>
    <property type="chains" value="A/B/C=1-1208"/>
</dbReference>
<dbReference type="PDB" id="7MY2">
    <property type="method" value="EM"/>
    <property type="resolution" value="2.65 A"/>
    <property type="chains" value="B/C/E=1-1208"/>
</dbReference>
<dbReference type="PDB" id="7MY3">
    <property type="method" value="EM"/>
    <property type="resolution" value="2.90 A"/>
    <property type="chains" value="A/B/C=1-1208"/>
</dbReference>
<dbReference type="PDB" id="7MY8">
    <property type="method" value="NMR"/>
    <property type="chains" value="A=816-857"/>
</dbReference>
<dbReference type="PDB" id="7MZF">
    <property type="method" value="X-ray"/>
    <property type="resolution" value="2.49 A"/>
    <property type="chains" value="A=331-527"/>
</dbReference>
<dbReference type="PDB" id="7MZG">
    <property type="method" value="X-ray"/>
    <property type="resolution" value="2.00 A"/>
    <property type="chains" value="A=331-527"/>
</dbReference>
<dbReference type="PDB" id="7MZH">
    <property type="method" value="X-ray"/>
    <property type="resolution" value="2.10 A"/>
    <property type="chains" value="A/E=331-527"/>
</dbReference>
<dbReference type="PDB" id="7MZI">
    <property type="method" value="X-ray"/>
    <property type="resolution" value="1.85 A"/>
    <property type="chains" value="A=331-527"/>
</dbReference>
<dbReference type="PDB" id="7MZJ">
    <property type="method" value="X-ray"/>
    <property type="resolution" value="2.40 A"/>
    <property type="chains" value="A/B=331-527"/>
</dbReference>
<dbReference type="PDB" id="7MZK">
    <property type="method" value="X-ray"/>
    <property type="resolution" value="2.25 A"/>
    <property type="chains" value="A/B=331-527"/>
</dbReference>
<dbReference type="PDB" id="7MZL">
    <property type="method" value="X-ray"/>
    <property type="resolution" value="3.70 A"/>
    <property type="chains" value="A=331-527"/>
</dbReference>
<dbReference type="PDB" id="7MZM">
    <property type="method" value="X-ray"/>
    <property type="resolution" value="2.30 A"/>
    <property type="chains" value="A=331-527"/>
</dbReference>
<dbReference type="PDB" id="7MZN">
    <property type="method" value="X-ray"/>
    <property type="resolution" value="3.10 A"/>
    <property type="chains" value="A=331-527"/>
</dbReference>
<dbReference type="PDB" id="7N0G">
    <property type="method" value="EM"/>
    <property type="resolution" value="3.02 A"/>
    <property type="chains" value="A/B/C=1-1208"/>
</dbReference>
<dbReference type="PDB" id="7N0H">
    <property type="method" value="EM"/>
    <property type="resolution" value="3.34 A"/>
    <property type="chains" value="A/B/C=1-1208"/>
</dbReference>
<dbReference type="PDB" id="7N1A">
    <property type="method" value="X-ray"/>
    <property type="resolution" value="2.06 A"/>
    <property type="chains" value="C/F=269-277"/>
</dbReference>
<dbReference type="PDB" id="7N1B">
    <property type="method" value="X-ray"/>
    <property type="resolution" value="2.81 A"/>
    <property type="chains" value="C/F=1000-1008"/>
</dbReference>
<dbReference type="PDB" id="7N1E">
    <property type="method" value="X-ray"/>
    <property type="resolution" value="2.30 A"/>
    <property type="chains" value="C=1000-1008"/>
</dbReference>
<dbReference type="PDB" id="7N1F">
    <property type="method" value="X-ray"/>
    <property type="resolution" value="2.39 A"/>
    <property type="chains" value="C=269-277"/>
</dbReference>
<dbReference type="PDB" id="7N1Q">
    <property type="method" value="EM"/>
    <property type="resolution" value="3.44 A"/>
    <property type="chains" value="A/B/C=1-1273"/>
</dbReference>
<dbReference type="PDB" id="7N1T">
    <property type="method" value="EM"/>
    <property type="resolution" value="3.44 A"/>
    <property type="chains" value="A/B/C=1-1273"/>
</dbReference>
<dbReference type="PDB" id="7N1U">
    <property type="method" value="EM"/>
    <property type="resolution" value="3.14 A"/>
    <property type="chains" value="A/B/C=1-1273"/>
</dbReference>
<dbReference type="PDB" id="7N1V">
    <property type="method" value="EM"/>
    <property type="resolution" value="3.50 A"/>
    <property type="chains" value="A/B/C=1-1273"/>
</dbReference>
<dbReference type="PDB" id="7N1W">
    <property type="method" value="EM"/>
    <property type="resolution" value="3.33 A"/>
    <property type="chains" value="A/B/C=1-1273"/>
</dbReference>
<dbReference type="PDB" id="7N1X">
    <property type="method" value="EM"/>
    <property type="resolution" value="4.00 A"/>
    <property type="chains" value="A/B/C=1-1273"/>
</dbReference>
<dbReference type="PDB" id="7N1Y">
    <property type="method" value="EM"/>
    <property type="resolution" value="4.30 A"/>
    <property type="chains" value="A/B/C=1-1273"/>
</dbReference>
<dbReference type="PDB" id="7N3I">
    <property type="method" value="X-ray"/>
    <property type="resolution" value="2.03 A"/>
    <property type="chains" value="C=328-533"/>
</dbReference>
<dbReference type="PDB" id="7N4I">
    <property type="method" value="X-ray"/>
    <property type="resolution" value="2.28 A"/>
    <property type="chains" value="C=331-527"/>
</dbReference>
<dbReference type="PDB" id="7N4J">
    <property type="method" value="X-ray"/>
    <property type="resolution" value="2.21 A"/>
    <property type="chains" value="A=331-527"/>
</dbReference>
<dbReference type="PDB" id="7N4L">
    <property type="method" value="X-ray"/>
    <property type="resolution" value="3.60 A"/>
    <property type="chains" value="A=331-527"/>
</dbReference>
<dbReference type="PDB" id="7N4M">
    <property type="method" value="X-ray"/>
    <property type="resolution" value="3.79 A"/>
    <property type="chains" value="A=331-527"/>
</dbReference>
<dbReference type="PDB" id="7N5H">
    <property type="method" value="EM"/>
    <property type="resolution" value="3.24 A"/>
    <property type="chains" value="A/B/C=1-1208"/>
</dbReference>
<dbReference type="PDB" id="7N62">
    <property type="method" value="EM"/>
    <property type="resolution" value="4.00 A"/>
    <property type="chains" value="A=1-1273"/>
</dbReference>
<dbReference type="PDB" id="7N64">
    <property type="method" value="EM"/>
    <property type="resolution" value="4.20 A"/>
    <property type="chains" value="A/B=1-1273"/>
</dbReference>
<dbReference type="PDB" id="7N6D">
    <property type="method" value="X-ray"/>
    <property type="resolution" value="2.30 A"/>
    <property type="chains" value="C/G/K/O=269-277"/>
</dbReference>
<dbReference type="PDB" id="7N6E">
    <property type="method" value="X-ray"/>
    <property type="resolution" value="3.20 A"/>
    <property type="chains" value="C/F=269-277"/>
</dbReference>
<dbReference type="PDB" id="7N8H">
    <property type="method" value="EM"/>
    <property type="resolution" value="2.30 A"/>
    <property type="chains" value="A/F/K=1-1208"/>
</dbReference>
<dbReference type="PDB" id="7N8I">
    <property type="method" value="EM"/>
    <property type="resolution" value="3.00 A"/>
    <property type="chains" value="A=1-1208"/>
</dbReference>
<dbReference type="PDB" id="7N9A">
    <property type="method" value="EM"/>
    <property type="resolution" value="3.50 A"/>
    <property type="chains" value="E=334-528"/>
</dbReference>
<dbReference type="PDB" id="7N9B">
    <property type="method" value="EM"/>
    <property type="resolution" value="3.80 A"/>
    <property type="chains" value="A/B/C=1-1208"/>
</dbReference>
<dbReference type="PDB" id="7N9C">
    <property type="method" value="EM"/>
    <property type="resolution" value="3.71 A"/>
    <property type="chains" value="A/B/C=1-1208"/>
</dbReference>
<dbReference type="PDB" id="7N9E">
    <property type="method" value="EM"/>
    <property type="resolution" value="3.52 A"/>
    <property type="chains" value="A/B/C=1-1208"/>
</dbReference>
<dbReference type="PDB" id="7N9T">
    <property type="method" value="EM"/>
    <property type="resolution" value="3.18 A"/>
    <property type="chains" value="A/B/C=25-1147"/>
</dbReference>
<dbReference type="PDB" id="7NAB">
    <property type="method" value="X-ray"/>
    <property type="resolution" value="2.15 A"/>
    <property type="chains" value="C/D=1140-1165"/>
</dbReference>
<dbReference type="PDB" id="7ND3">
    <property type="method" value="EM"/>
    <property type="resolution" value="3.70 A"/>
    <property type="chains" value="A/B/C=1-1208"/>
</dbReference>
<dbReference type="PDB" id="7ND4">
    <property type="method" value="EM"/>
    <property type="resolution" value="3.60 A"/>
    <property type="chains" value="A/B/C=1-1208"/>
</dbReference>
<dbReference type="PDB" id="7ND5">
    <property type="method" value="EM"/>
    <property type="resolution" value="3.40 A"/>
    <property type="chains" value="A/B/C=1-1208"/>
</dbReference>
<dbReference type="PDB" id="7ND6">
    <property type="method" value="EM"/>
    <property type="resolution" value="7.30 A"/>
    <property type="chains" value="A/B/C=1-1208"/>
</dbReference>
<dbReference type="PDB" id="7ND7">
    <property type="method" value="EM"/>
    <property type="resolution" value="3.60 A"/>
    <property type="chains" value="A/B/C=1-1208"/>
</dbReference>
<dbReference type="PDB" id="7ND8">
    <property type="method" value="EM"/>
    <property type="resolution" value="3.50 A"/>
    <property type="chains" value="A/B/C=1-1208"/>
</dbReference>
<dbReference type="PDB" id="7ND9">
    <property type="method" value="EM"/>
    <property type="resolution" value="2.80 A"/>
    <property type="chains" value="A/B/C=1-1208"/>
</dbReference>
<dbReference type="PDB" id="7NDA">
    <property type="method" value="EM"/>
    <property type="resolution" value="3.30 A"/>
    <property type="chains" value="A/B/C=1-1208"/>
</dbReference>
<dbReference type="PDB" id="7NDB">
    <property type="method" value="EM"/>
    <property type="resolution" value="4.60 A"/>
    <property type="chains" value="A/B/C=1-1208"/>
</dbReference>
<dbReference type="PDB" id="7NDC">
    <property type="method" value="EM"/>
    <property type="resolution" value="4.10 A"/>
    <property type="chains" value="A/B/C=1-1208"/>
</dbReference>
<dbReference type="PDB" id="7NDD">
    <property type="method" value="EM"/>
    <property type="resolution" value="4.20 A"/>
    <property type="chains" value="A/B/C=1-1208"/>
</dbReference>
<dbReference type="PDB" id="7NEG">
    <property type="method" value="X-ray"/>
    <property type="resolution" value="2.19 A"/>
    <property type="chains" value="E=333-528"/>
</dbReference>
<dbReference type="PDB" id="7NEH">
    <property type="method" value="X-ray"/>
    <property type="resolution" value="1.77 A"/>
    <property type="chains" value="E=333-528"/>
</dbReference>
<dbReference type="PDB" id="7NKT">
    <property type="method" value="X-ray"/>
    <property type="resolution" value="2.30 A"/>
    <property type="chains" value="AAA=319-541"/>
</dbReference>
<dbReference type="PDB" id="7NLL">
    <property type="method" value="EM"/>
    <property type="resolution" value="2.89 A"/>
    <property type="chains" value="B/D=319-550"/>
</dbReference>
<dbReference type="PDB" id="7NP1">
    <property type="method" value="X-ray"/>
    <property type="resolution" value="2.80 A"/>
    <property type="chains" value="A/B/C/D=319-541"/>
</dbReference>
<dbReference type="PDB" id="7NS6">
    <property type="method" value="EM"/>
    <property type="resolution" value="3.18 A"/>
    <property type="chains" value="I/J/K/L/M/N=1-1208"/>
</dbReference>
<dbReference type="PDB" id="7NT9">
    <property type="method" value="EM"/>
    <property type="resolution" value="3.36 A"/>
    <property type="chains" value="A/B/C=1-1208"/>
</dbReference>
<dbReference type="PDB" id="7NTA">
    <property type="method" value="EM"/>
    <property type="resolution" value="3.50 A"/>
    <property type="chains" value="A/B/C=1-1208"/>
</dbReference>
<dbReference type="PDB" id="7NTC">
    <property type="method" value="EM"/>
    <property type="resolution" value="3.60 A"/>
    <property type="chains" value="A/B/C=1-1208"/>
</dbReference>
<dbReference type="PDB" id="7NX6">
    <property type="method" value="X-ray"/>
    <property type="resolution" value="2.25 A"/>
    <property type="chains" value="E=333-528"/>
</dbReference>
<dbReference type="PDB" id="7NX7">
    <property type="method" value="X-ray"/>
    <property type="resolution" value="2.30 A"/>
    <property type="chains" value="E=333-528"/>
</dbReference>
<dbReference type="PDB" id="7NX8">
    <property type="method" value="X-ray"/>
    <property type="resolution" value="1.95 A"/>
    <property type="chains" value="E=333-528"/>
</dbReference>
<dbReference type="PDB" id="7NX9">
    <property type="method" value="X-ray"/>
    <property type="resolution" value="2.40 A"/>
    <property type="chains" value="E=333-528"/>
</dbReference>
<dbReference type="PDB" id="7NXA">
    <property type="method" value="X-ray"/>
    <property type="resolution" value="2.50 A"/>
    <property type="chains" value="E=333-528"/>
</dbReference>
<dbReference type="PDB" id="7NXB">
    <property type="method" value="X-ray"/>
    <property type="resolution" value="2.67 A"/>
    <property type="chains" value="E=333-528"/>
</dbReference>
<dbReference type="PDB" id="7NXC">
    <property type="method" value="X-ray"/>
    <property type="resolution" value="3.14 A"/>
    <property type="chains" value="B=333-528"/>
</dbReference>
<dbReference type="PDB" id="7OAN">
    <property type="method" value="EM"/>
    <property type="resolution" value="3.00 A"/>
    <property type="chains" value="A/B/C=1-1208"/>
</dbReference>
<dbReference type="PDB" id="7OAO">
    <property type="method" value="X-ray"/>
    <property type="resolution" value="1.50 A"/>
    <property type="chains" value="EEE=330-532"/>
</dbReference>
<dbReference type="PDB" id="7OAP">
    <property type="method" value="X-ray"/>
    <property type="resolution" value="1.90 A"/>
    <property type="chains" value="EEE=331-532"/>
</dbReference>
<dbReference type="PDB" id="7OAQ">
    <property type="method" value="X-ray"/>
    <property type="resolution" value="1.55 A"/>
    <property type="chains" value="EEE=330-532"/>
</dbReference>
<dbReference type="PDB" id="7OAU">
    <property type="method" value="X-ray"/>
    <property type="resolution" value="1.65 A"/>
    <property type="chains" value="AAA/EEE=330-532"/>
</dbReference>
<dbReference type="PDB" id="7OAY">
    <property type="method" value="X-ray"/>
    <property type="resolution" value="2.34 A"/>
    <property type="chains" value="AAA/CCC/EEE/GGG/III/KKK=330-532"/>
</dbReference>
<dbReference type="PDB" id="7OD3">
    <property type="method" value="EM"/>
    <property type="resolution" value="2.80 A"/>
    <property type="chains" value="A/B/C=1-1208"/>
</dbReference>
<dbReference type="PDB" id="7ODL">
    <property type="method" value="EM"/>
    <property type="resolution" value="3.03 A"/>
    <property type="chains" value="A/B/C=1-1208"/>
</dbReference>
<dbReference type="PDB" id="7OLZ">
    <property type="method" value="X-ray"/>
    <property type="resolution" value="1.75 A"/>
    <property type="chains" value="A=333-527"/>
</dbReference>
<dbReference type="PDB" id="7OR9">
    <property type="method" value="X-ray"/>
    <property type="resolution" value="2.34 A"/>
    <property type="chains" value="E=333-528"/>
</dbReference>
<dbReference type="PDB" id="7ORA">
    <property type="method" value="X-ray"/>
    <property type="resolution" value="2.60 A"/>
    <property type="chains" value="C/R=333-528"/>
</dbReference>
<dbReference type="PDB" id="7ORB">
    <property type="method" value="X-ray"/>
    <property type="resolution" value="2.50 A"/>
    <property type="chains" value="R/X=333-528"/>
</dbReference>
<dbReference type="PDB" id="7OWX">
    <property type="method" value="X-ray"/>
    <property type="resolution" value="1.93 A"/>
    <property type="chains" value="A/B/C/D=1177-1203"/>
</dbReference>
<dbReference type="PDB" id="7P19">
    <property type="method" value="X-ray"/>
    <property type="resolution" value="3.24 A"/>
    <property type="chains" value="C/E=334-541"/>
</dbReference>
<dbReference type="PDB" id="7P3D">
    <property type="method" value="X-ray"/>
    <property type="resolution" value="1.67 A"/>
    <property type="chains" value="C=269-277"/>
</dbReference>
<dbReference type="PDB" id="7P3E">
    <property type="method" value="X-ray"/>
    <property type="resolution" value="2.00 A"/>
    <property type="chains" value="C/F=269-277"/>
</dbReference>
<dbReference type="PDB" id="7P40">
    <property type="method" value="EM"/>
    <property type="resolution" value="3.50 A"/>
    <property type="chains" value="A/E/G=13-1223"/>
</dbReference>
<dbReference type="PDB" id="7P5G">
    <property type="method" value="NMR"/>
    <property type="chains" value="A=482-506"/>
</dbReference>
<dbReference type="PDB" id="7P5Q">
    <property type="method" value="NMR"/>
    <property type="chains" value="A=482-506"/>
</dbReference>
<dbReference type="PDB" id="7P5S">
    <property type="method" value="NMR"/>
    <property type="chains" value="A=482-506"/>
</dbReference>
<dbReference type="PDB" id="7P77">
    <property type="method" value="EM"/>
    <property type="resolution" value="2.98 A"/>
    <property type="chains" value="B/C/E=1-1208"/>
</dbReference>
<dbReference type="PDB" id="7P78">
    <property type="method" value="EM"/>
    <property type="resolution" value="3.32 A"/>
    <property type="chains" value="A/C/E=1-1208"/>
</dbReference>
<dbReference type="PDB" id="7P79">
    <property type="method" value="EM"/>
    <property type="resolution" value="4.00 A"/>
    <property type="chains" value="A/C/E=1-1208"/>
</dbReference>
<dbReference type="PDB" id="7P7A">
    <property type="method" value="EM"/>
    <property type="resolution" value="4.76 A"/>
    <property type="chains" value="B/C/E=1-1208"/>
</dbReference>
<dbReference type="PDB" id="7P7B">
    <property type="method" value="EM"/>
    <property type="resolution" value="3.13 A"/>
    <property type="chains" value="A/B/C=1-1208"/>
</dbReference>
<dbReference type="PDB" id="7PBE">
    <property type="method" value="X-ray"/>
    <property type="resolution" value="3.00 A"/>
    <property type="chains" value="C/H=269-277"/>
</dbReference>
<dbReference type="PDB" id="7PHG">
    <property type="method" value="EM"/>
    <property type="resolution" value="4.30 A"/>
    <property type="chains" value="A=332-527"/>
</dbReference>
<dbReference type="PDB" id="7PKI">
    <property type="method" value="X-ray"/>
    <property type="resolution" value="2.94 A"/>
    <property type="chains" value="E=332-528"/>
</dbReference>
<dbReference type="PDB" id="7PQY">
    <property type="method" value="X-ray"/>
    <property type="resolution" value="3.00 A"/>
    <property type="chains" value="A/E=333-526"/>
</dbReference>
<dbReference type="PDB" id="7PQZ">
    <property type="method" value="X-ray"/>
    <property type="resolution" value="3.20 A"/>
    <property type="chains" value="E=333-526"/>
</dbReference>
<dbReference type="PDB" id="7PR0">
    <property type="method" value="X-ray"/>
    <property type="resolution" value="2.92 A"/>
    <property type="chains" value="A/D/E=333-526"/>
</dbReference>
<dbReference type="PDB" id="7PRY">
    <property type="method" value="X-ray"/>
    <property type="resolution" value="3.10 A"/>
    <property type="chains" value="E/I=333-526"/>
</dbReference>
<dbReference type="PDB" id="7PRZ">
    <property type="method" value="X-ray"/>
    <property type="resolution" value="3.20 A"/>
    <property type="chains" value="E=333-526"/>
</dbReference>
<dbReference type="PDB" id="7PS0">
    <property type="method" value="X-ray"/>
    <property type="resolution" value="2.92 A"/>
    <property type="chains" value="A/E=333-526"/>
</dbReference>
<dbReference type="PDB" id="7PS1">
    <property type="method" value="X-ray"/>
    <property type="resolution" value="2.40 A"/>
    <property type="chains" value="E=333-526"/>
</dbReference>
<dbReference type="PDB" id="7PS2">
    <property type="method" value="X-ray"/>
    <property type="resolution" value="2.99 A"/>
    <property type="chains" value="G=333-526"/>
</dbReference>
<dbReference type="PDB" id="7PS4">
    <property type="method" value="X-ray"/>
    <property type="resolution" value="1.94 A"/>
    <property type="chains" value="A/E=333-526"/>
</dbReference>
<dbReference type="PDB" id="7PS5">
    <property type="method" value="X-ray"/>
    <property type="resolution" value="3.14 A"/>
    <property type="chains" value="E=333-526"/>
</dbReference>
<dbReference type="PDB" id="7PS6">
    <property type="method" value="X-ray"/>
    <property type="resolution" value="2.26 A"/>
    <property type="chains" value="E=333-526"/>
</dbReference>
<dbReference type="PDB" id="7PS7">
    <property type="method" value="X-ray"/>
    <property type="resolution" value="3.90 A"/>
    <property type="chains" value="E/R=333-526"/>
</dbReference>
<dbReference type="PDB" id="7Q0A">
    <property type="method" value="EM"/>
    <property type="resolution" value="4.80 A"/>
    <property type="chains" value="A/B/C=1-1208"/>
</dbReference>
<dbReference type="PDB" id="7Q0G">
    <property type="method" value="X-ray"/>
    <property type="resolution" value="1.82 A"/>
    <property type="chains" value="E=333-526"/>
</dbReference>
<dbReference type="PDB" id="7Q0H">
    <property type="method" value="X-ray"/>
    <property type="resolution" value="3.65 A"/>
    <property type="chains" value="E=333-526"/>
</dbReference>
<dbReference type="PDB" id="7Q0I">
    <property type="method" value="X-ray"/>
    <property type="resolution" value="2.39 A"/>
    <property type="chains" value="C/D=13-305"/>
</dbReference>
<dbReference type="PDB" id="7Q1Z">
    <property type="method" value="EM"/>
    <property type="resolution" value="3.40 A"/>
    <property type="chains" value="A/B/C=1-1208"/>
</dbReference>
<dbReference type="PDB" id="7Q3Q">
    <property type="method" value="X-ray"/>
    <property type="resolution" value="2.30 A"/>
    <property type="chains" value="A=331-528"/>
</dbReference>
<dbReference type="PDB" id="7Q3R">
    <property type="method" value="X-ray"/>
    <property type="resolution" value="1.92 A"/>
    <property type="chains" value="A=331-528"/>
</dbReference>
<dbReference type="PDB" id="7Q6E">
    <property type="method" value="EM"/>
    <property type="resolution" value="2.70 A"/>
    <property type="chains" value="A/B/C=1-1205"/>
</dbReference>
<dbReference type="PDB" id="7Q9F">
    <property type="method" value="EM"/>
    <property type="resolution" value="3.60 A"/>
    <property type="chains" value="A/B/C=1-1208"/>
</dbReference>
<dbReference type="PDB" id="7Q9G">
    <property type="method" value="EM"/>
    <property type="resolution" value="3.30 A"/>
    <property type="chains" value="A/B/C=1-1208"/>
</dbReference>
<dbReference type="PDB" id="7Q9I">
    <property type="method" value="EM"/>
    <property type="resolution" value="4.90 A"/>
    <property type="chains" value="A/B/C=1-1208"/>
</dbReference>
<dbReference type="PDB" id="7Q9J">
    <property type="method" value="EM"/>
    <property type="resolution" value="4.00 A"/>
    <property type="chains" value="A/B/C=1-1205"/>
</dbReference>
<dbReference type="PDB" id="7Q9K">
    <property type="method" value="EM"/>
    <property type="resolution" value="4.50 A"/>
    <property type="chains" value="A/B/C=1-1208"/>
</dbReference>
<dbReference type="PDB" id="7Q9M">
    <property type="method" value="EM"/>
    <property type="resolution" value="3.70 A"/>
    <property type="chains" value="A/B/C=1-1208"/>
</dbReference>
<dbReference type="PDB" id="7Q9P">
    <property type="method" value="EM"/>
    <property type="resolution" value="4.50 A"/>
    <property type="chains" value="A/B/C=1-1205"/>
</dbReference>
<dbReference type="PDB" id="7QDG">
    <property type="method" value="EM"/>
    <property type="resolution" value="3.40 A"/>
    <property type="chains" value="A/B/C=15-1213"/>
</dbReference>
<dbReference type="PDB" id="7QDH">
    <property type="method" value="EM"/>
    <property type="resolution" value="4.20 A"/>
    <property type="chains" value="A/B/C=15-1213"/>
</dbReference>
<dbReference type="PDB" id="7QEZ">
    <property type="method" value="X-ray"/>
    <property type="resolution" value="2.89 A"/>
    <property type="chains" value="A=331-528"/>
</dbReference>
<dbReference type="PDB" id="7QF0">
    <property type="method" value="X-ray"/>
    <property type="resolution" value="2.30 A"/>
    <property type="chains" value="A=331-528"/>
</dbReference>
<dbReference type="PDB" id="7QF1">
    <property type="method" value="X-ray"/>
    <property type="resolution" value="2.80 A"/>
    <property type="chains" value="A/F=331-528"/>
</dbReference>
<dbReference type="PDB" id="7QNW">
    <property type="method" value="X-ray"/>
    <property type="resolution" value="2.40 A"/>
    <property type="chains" value="E=333-528"/>
</dbReference>
<dbReference type="PDB" id="7QNX">
    <property type="method" value="X-ray"/>
    <property type="resolution" value="2.92 A"/>
    <property type="chains" value="E=333-528"/>
</dbReference>
<dbReference type="PDB" id="7QNY">
    <property type="method" value="X-ray"/>
    <property type="resolution" value="2.84 A"/>
    <property type="chains" value="E=333-528"/>
</dbReference>
<dbReference type="PDB" id="7QO7">
    <property type="method" value="EM"/>
    <property type="resolution" value="3.02 A"/>
    <property type="chains" value="A/B/C=1-1208"/>
</dbReference>
<dbReference type="PDB" id="7QO9">
    <property type="method" value="EM"/>
    <property type="resolution" value="3.88 A"/>
    <property type="chains" value="A/B=1-1208"/>
</dbReference>
<dbReference type="PDB" id="7QTI">
    <property type="method" value="EM"/>
    <property type="resolution" value="3.04 A"/>
    <property type="chains" value="A/D/K=1-1205"/>
</dbReference>
<dbReference type="PDB" id="7QUR">
    <property type="method" value="EM"/>
    <property type="resolution" value="2.27 A"/>
    <property type="chains" value="A/B/C=1-1213"/>
</dbReference>
<dbReference type="PDB" id="7QUS">
    <property type="method" value="EM"/>
    <property type="resolution" value="2.39 A"/>
    <property type="chains" value="A/B/C=1-1213"/>
</dbReference>
<dbReference type="PDB" id="7R0Z">
    <property type="method" value="EM"/>
    <property type="resolution" value="3.50 A"/>
    <property type="chains" value="A=1-1208"/>
</dbReference>
<dbReference type="PDB" id="7R10">
    <property type="method" value="EM"/>
    <property type="resolution" value="4.00 A"/>
    <property type="chains" value="A=1-1208"/>
</dbReference>
<dbReference type="PDB" id="7R11">
    <property type="method" value="EM"/>
    <property type="resolution" value="3.50 A"/>
    <property type="chains" value="A=1-1208"/>
</dbReference>
<dbReference type="PDB" id="7R12">
    <property type="method" value="EM"/>
    <property type="resolution" value="3.30 A"/>
    <property type="chains" value="A=1-1208"/>
</dbReference>
<dbReference type="PDB" id="7R13">
    <property type="method" value="EM"/>
    <property type="resolution" value="3.60 A"/>
    <property type="chains" value="A/B/C=1-1208"/>
</dbReference>
<dbReference type="PDB" id="7R14">
    <property type="method" value="EM"/>
    <property type="resolution" value="3.40 A"/>
    <property type="chains" value="A/B/C=1-1208"/>
</dbReference>
<dbReference type="PDB" id="7R15">
    <property type="method" value="EM"/>
    <property type="resolution" value="4.10 A"/>
    <property type="chains" value="A/B/C=1-1208"/>
</dbReference>
<dbReference type="PDB" id="7R16">
    <property type="method" value="EM"/>
    <property type="resolution" value="3.50 A"/>
    <property type="chains" value="A/B/C=1-1208"/>
</dbReference>
<dbReference type="PDB" id="7R17">
    <property type="method" value="EM"/>
    <property type="resolution" value="3.70 A"/>
    <property type="chains" value="A/B/C=1-1208"/>
</dbReference>
<dbReference type="PDB" id="7R18">
    <property type="method" value="EM"/>
    <property type="resolution" value="3.00 A"/>
    <property type="chains" value="A/B/C=1-1146"/>
</dbReference>
<dbReference type="PDB" id="7R19">
    <property type="method" value="EM"/>
    <property type="resolution" value="3.30 A"/>
    <property type="chains" value="A/B/C=1-1208"/>
</dbReference>
<dbReference type="PDB" id="7R1A">
    <property type="method" value="EM"/>
    <property type="resolution" value="3.90 A"/>
    <property type="chains" value="A/B/C=1-1208"/>
</dbReference>
<dbReference type="PDB" id="7R1B">
    <property type="method" value="EM"/>
    <property type="resolution" value="2.80 A"/>
    <property type="chains" value="A/B/C=1-1208"/>
</dbReference>
<dbReference type="PDB" id="7R40">
    <property type="method" value="EM"/>
    <property type="resolution" value="2.90 A"/>
    <property type="chains" value="A/B/C=14-1208"/>
</dbReference>
<dbReference type="PDB" id="7R4I">
    <property type="method" value="EM"/>
    <property type="resolution" value="3.20 A"/>
    <property type="chains" value="A/B/C=1-1208"/>
</dbReference>
<dbReference type="PDB" id="7R4Q">
    <property type="method" value="EM"/>
    <property type="resolution" value="3.60 A"/>
    <property type="chains" value="A/B/C=1-1208"/>
</dbReference>
<dbReference type="PDB" id="7R4R">
    <property type="method" value="EM"/>
    <property type="resolution" value="3.90 A"/>
    <property type="chains" value="A/B/C=1-1208"/>
</dbReference>
<dbReference type="PDB" id="7R6W">
    <property type="method" value="X-ray"/>
    <property type="resolution" value="1.83 A"/>
    <property type="chains" value="R=328-531"/>
</dbReference>
<dbReference type="PDB" id="7R6X">
    <property type="method" value="X-ray"/>
    <property type="resolution" value="2.95 A"/>
    <property type="chains" value="R=328-531"/>
</dbReference>
<dbReference type="PDB" id="7R7N">
    <property type="method" value="EM"/>
    <property type="resolution" value="3.95 A"/>
    <property type="chains" value="E=1-1208"/>
</dbReference>
<dbReference type="PDB" id="7R8L">
    <property type="method" value="X-ray"/>
    <property type="resolution" value="2.60 A"/>
    <property type="chains" value="E=334-528"/>
</dbReference>
<dbReference type="PDB" id="7R8M">
    <property type="method" value="EM"/>
    <property type="resolution" value="3.40 A"/>
    <property type="chains" value="A/B/C=1-1213"/>
</dbReference>
<dbReference type="PDB" id="7R8N">
    <property type="method" value="EM"/>
    <property type="resolution" value="3.55 A"/>
    <property type="chains" value="A/B/E=1-1213"/>
</dbReference>
<dbReference type="PDB" id="7R8O">
    <property type="method" value="EM"/>
    <property type="resolution" value="3.50 A"/>
    <property type="chains" value="A/B/E=1-1213"/>
</dbReference>
<dbReference type="PDB" id="7R95">
    <property type="method" value="NMR"/>
    <property type="chains" value="A=919-965"/>
</dbReference>
<dbReference type="PDB" id="7RA8">
    <property type="method" value="EM"/>
    <property type="resolution" value="3.10 A"/>
    <property type="chains" value="A/B/E=1-1208"/>
</dbReference>
<dbReference type="PDB" id="7RAL">
    <property type="method" value="EM"/>
    <property type="chains" value="B=1-1208"/>
</dbReference>
<dbReference type="PDB" id="7RAQ">
    <property type="method" value="X-ray"/>
    <property type="resolution" value="1.74 A"/>
    <property type="chains" value="P=1149-1167"/>
</dbReference>
<dbReference type="PDB" id="7RBU">
    <property type="method" value="EM"/>
    <property type="resolution" value="3.70 A"/>
    <property type="chains" value="B=14-307"/>
</dbReference>
<dbReference type="PDB" id="7RBV">
    <property type="method" value="EM"/>
    <property type="resolution" value="3.60 A"/>
    <property type="chains" value="A/B/C=14-1208"/>
</dbReference>
<dbReference type="PDB" id="7RBY">
    <property type="method" value="X-ray"/>
    <property type="resolution" value="2.82 A"/>
    <property type="chains" value="A/C=329-538"/>
</dbReference>
<dbReference type="PDB" id="7RKU">
    <property type="method" value="X-ray"/>
    <property type="resolution" value="3.20 A"/>
    <property type="chains" value="A/B/C/D=328-533"/>
</dbReference>
<dbReference type="PDB" id="7RKV">
    <property type="method" value="EM"/>
    <property type="resolution" value="3.45 A"/>
    <property type="chains" value="A/B/C=1-1213"/>
</dbReference>
<dbReference type="PDB" id="7RNJ">
    <property type="method" value="X-ray"/>
    <property type="resolution" value="2.67 A"/>
    <property type="chains" value="B=1146-1159"/>
</dbReference>
<dbReference type="PDB" id="7RPV">
    <property type="method" value="X-ray"/>
    <property type="resolution" value="3.54 A"/>
    <property type="chains" value="E/F/G/H=320-537"/>
</dbReference>
<dbReference type="PDB" id="7RQ6">
    <property type="method" value="EM"/>
    <property type="resolution" value="4.18 A"/>
    <property type="chains" value="A/B/C=1-1208"/>
</dbReference>
<dbReference type="PDB" id="7RR0">
    <property type="method" value="EM"/>
    <property type="resolution" value="3.12 A"/>
    <property type="chains" value="A=334-527"/>
</dbReference>
<dbReference type="PDB" id="7RTD">
    <property type="method" value="X-ray"/>
    <property type="resolution" value="2.05 A"/>
    <property type="chains" value="C=269-277"/>
</dbReference>
<dbReference type="PDB" id="7RTR">
    <property type="method" value="X-ray"/>
    <property type="resolution" value="2.60 A"/>
    <property type="chains" value="C=269-277"/>
</dbReference>
<dbReference type="PDB" id="7RU1">
    <property type="method" value="EM"/>
    <property type="resolution" value="2.80 A"/>
    <property type="chains" value="A/B/C=1-1208"/>
</dbReference>
<dbReference type="PDB" id="7RU2">
    <property type="method" value="EM"/>
    <property type="resolution" value="3.00 A"/>
    <property type="chains" value="A/B/C=1-1208"/>
</dbReference>
<dbReference type="PDB" id="7RU3">
    <property type="method" value="EM"/>
    <property type="resolution" value="3.30 A"/>
    <property type="chains" value="A/B/C=1-1208"/>
</dbReference>
<dbReference type="PDB" id="7RU4">
    <property type="method" value="EM"/>
    <property type="resolution" value="3.30 A"/>
    <property type="chains" value="A=1-1208"/>
</dbReference>
<dbReference type="PDB" id="7RU5">
    <property type="method" value="EM"/>
    <property type="resolution" value="3.60 A"/>
    <property type="chains" value="A/B/C=1-1208"/>
</dbReference>
<dbReference type="PDB" id="7RU8">
    <property type="method" value="EM"/>
    <property type="resolution" value="3.80 A"/>
    <property type="chains" value="C=1-1208"/>
</dbReference>
<dbReference type="PDB" id="7RW2">
    <property type="method" value="EM"/>
    <property type="resolution" value="3.50 A"/>
    <property type="chains" value="A/B/C=1-1208"/>
</dbReference>
<dbReference type="PDB" id="7RXD">
    <property type="method" value="EM"/>
    <property type="resolution" value="3.60 A"/>
    <property type="chains" value="R=334-526"/>
</dbReference>
<dbReference type="PDB" id="7RZQ">
    <property type="method" value="EM"/>
    <property type="resolution" value="2.09 A"/>
    <property type="chains" value="A/B/C=917-988, D/E/F=1162-1201"/>
</dbReference>
<dbReference type="PDB" id="7RZR">
    <property type="method" value="EM"/>
    <property type="resolution" value="2.27 A"/>
    <property type="chains" value="A/B/C=917-988, D/E/F=1162-1201"/>
</dbReference>
<dbReference type="PDB" id="7RZS">
    <property type="method" value="EM"/>
    <property type="resolution" value="2.52 A"/>
    <property type="chains" value="A/B/C=917-988, D/E/F=1162-1201"/>
</dbReference>
<dbReference type="PDB" id="7RZT">
    <property type="method" value="EM"/>
    <property type="resolution" value="2.35 A"/>
    <property type="chains" value="A/B/C=917-988, D/E/F=1162-1201"/>
</dbReference>
<dbReference type="PDB" id="7RZU">
    <property type="method" value="EM"/>
    <property type="resolution" value="2.30 A"/>
    <property type="chains" value="A/B/C=917-988, D/E/F=1162-1201"/>
</dbReference>
<dbReference type="PDB" id="7RZV">
    <property type="method" value="EM"/>
    <property type="resolution" value="2.11 A"/>
    <property type="chains" value="A/B/C=917-988, D/E/F=1157-1201"/>
</dbReference>
<dbReference type="PDB" id="7S0B">
    <property type="method" value="X-ray"/>
    <property type="resolution" value="2.90 A"/>
    <property type="chains" value="E/F=319-533"/>
</dbReference>
<dbReference type="PDB" id="7S0C">
    <property type="method" value="EM"/>
    <property type="resolution" value="3.25 A"/>
    <property type="chains" value="A/B/C=1-1213"/>
</dbReference>
<dbReference type="PDB" id="7S0D">
    <property type="method" value="EM"/>
    <property type="resolution" value="3.50 A"/>
    <property type="chains" value="A/B/C=1-1213"/>
</dbReference>
<dbReference type="PDB" id="7S0E">
    <property type="method" value="EM"/>
    <property type="resolution" value="4.90 A"/>
    <property type="chains" value="A=1-1213"/>
</dbReference>
<dbReference type="PDB" id="7S3N">
    <property type="method" value="X-ray"/>
    <property type="resolution" value="1.90 A"/>
    <property type="chains" value="A=1146-1164"/>
</dbReference>
<dbReference type="PDB" id="7S4S">
    <property type="method" value="X-ray"/>
    <property type="resolution" value="2.05 A"/>
    <property type="chains" value="A=319-541"/>
</dbReference>
<dbReference type="PDB" id="7S5P">
    <property type="method" value="X-ray"/>
    <property type="resolution" value="2.86 A"/>
    <property type="chains" value="A=319-541"/>
</dbReference>
<dbReference type="PDB" id="7S5Q">
    <property type="method" value="X-ray"/>
    <property type="resolution" value="2.88 A"/>
    <property type="chains" value="A=319-541"/>
</dbReference>
<dbReference type="PDB" id="7S5R">
    <property type="method" value="X-ray"/>
    <property type="resolution" value="2.45 A"/>
    <property type="chains" value="A=319-541"/>
</dbReference>
<dbReference type="PDB" id="7S6I">
    <property type="method" value="EM"/>
    <property type="resolution" value="3.20 A"/>
    <property type="chains" value="A/B/C=1-1208"/>
</dbReference>
<dbReference type="PDB" id="7S6J">
    <property type="method" value="EM"/>
    <property type="resolution" value="3.40 A"/>
    <property type="chains" value="A/B/E=1-1208"/>
</dbReference>
<dbReference type="PDB" id="7S6K">
    <property type="method" value="EM"/>
    <property type="resolution" value="3.40 A"/>
    <property type="chains" value="A/B/E=1-1208"/>
</dbReference>
<dbReference type="PDB" id="7S6L">
    <property type="method" value="EM"/>
    <property type="resolution" value="4.00 A"/>
    <property type="chains" value="A/B/C=1-1208"/>
</dbReference>
<dbReference type="PDB" id="7S83">
    <property type="method" value="X-ray"/>
    <property type="resolution" value="2.52 A"/>
    <property type="chains" value="C=331-527"/>
</dbReference>
<dbReference type="PDB" id="7SA2">
    <property type="method" value="X-ray"/>
    <property type="resolution" value="1.85 A"/>
    <property type="chains" value="C=1060-1068"/>
</dbReference>
<dbReference type="PDB" id="7SBK">
    <property type="method" value="EM"/>
    <property type="resolution" value="3.44 A"/>
    <property type="chains" value="A/B/C=1-1273"/>
</dbReference>
<dbReference type="PDB" id="7SBL">
    <property type="method" value="EM"/>
    <property type="resolution" value="3.44 A"/>
    <property type="chains" value="A/B/C=1-1273"/>
</dbReference>
<dbReference type="PDB" id="7SBO">
    <property type="method" value="EM"/>
    <property type="resolution" value="3.44 A"/>
    <property type="chains" value="A/B/C=1-1273"/>
</dbReference>
<dbReference type="PDB" id="7SBP">
    <property type="method" value="EM"/>
    <property type="resolution" value="3.44 A"/>
    <property type="chains" value="A/B/C=1-1273"/>
</dbReference>
<dbReference type="PDB" id="7SBQ">
    <property type="method" value="EM"/>
    <property type="resolution" value="3.50 A"/>
    <property type="chains" value="A/B/C=1-1273"/>
</dbReference>
<dbReference type="PDB" id="7SBR">
    <property type="method" value="EM"/>
    <property type="resolution" value="3.50 A"/>
    <property type="chains" value="A/B/C=1-1273"/>
</dbReference>
<dbReference type="PDB" id="7SBS">
    <property type="method" value="EM"/>
    <property type="resolution" value="3.50 A"/>
    <property type="chains" value="A/B/C=1-1273"/>
</dbReference>
<dbReference type="PDB" id="7SBT">
    <property type="method" value="EM"/>
    <property type="resolution" value="3.50 A"/>
    <property type="chains" value="A/B/C=1-1273"/>
</dbReference>
<dbReference type="PDB" id="7SBU">
    <property type="method" value="X-ray"/>
    <property type="resolution" value="2.53 A"/>
    <property type="chains" value="A=333-530"/>
</dbReference>
<dbReference type="PDB" id="7SC1">
    <property type="method" value="EM"/>
    <property type="resolution" value="3.20 A"/>
    <property type="chains" value="A/B/C=1-1213"/>
</dbReference>
<dbReference type="PDB" id="7SD5">
    <property type="method" value="X-ray"/>
    <property type="resolution" value="1.53 A"/>
    <property type="chains" value="A=319-537"/>
</dbReference>
<dbReference type="PDB" id="7SI2">
    <property type="method" value="X-ray"/>
    <property type="resolution" value="3.20 A"/>
    <property type="chains" value="A/B/C=319-537"/>
</dbReference>
<dbReference type="PDB" id="7SIS">
    <property type="method" value="X-ray"/>
    <property type="resolution" value="1.90 A"/>
    <property type="chains" value="C=976-984"/>
</dbReference>
<dbReference type="PDB" id="7SJ0">
    <property type="method" value="EM"/>
    <property type="resolution" value="3.36 A"/>
    <property type="chains" value="A=1-1208"/>
</dbReference>
<dbReference type="PDB" id="7SJS">
    <property type="method" value="X-ray"/>
    <property type="resolution" value="1.61 A"/>
    <property type="chains" value="C=1140-1164"/>
</dbReference>
<dbReference type="PDB" id="7SKZ">
    <property type="method" value="X-ray"/>
    <property type="resolution" value="1.86 A"/>
    <property type="chains" value="A=812-824"/>
</dbReference>
<dbReference type="PDB" id="7SL5">
    <property type="method" value="X-ray"/>
    <property type="resolution" value="2.50 A"/>
    <property type="chains" value="C/F/I/L=811-825"/>
</dbReference>
<dbReference type="PDB" id="7SN0">
    <property type="method" value="X-ray"/>
    <property type="resolution" value="3.08 A"/>
    <property type="chains" value="C/D=319-541"/>
</dbReference>
<dbReference type="PDB" id="7SN2">
    <property type="method" value="EM"/>
    <property type="resolution" value="4.30 A"/>
    <property type="chains" value="A=1-1208"/>
</dbReference>
<dbReference type="PDB" id="7SN3">
    <property type="method" value="EM"/>
    <property type="resolution" value="3.10 A"/>
    <property type="chains" value="A/B/C=1-1208"/>
</dbReference>
<dbReference type="PDB" id="7SO9">
    <property type="method" value="EM"/>
    <property type="resolution" value="2.40 A"/>
    <property type="chains" value="A/F/K=1-1208"/>
</dbReference>
<dbReference type="PDB" id="7SOA">
    <property type="method" value="EM"/>
    <property type="resolution" value="3.10 A"/>
    <property type="chains" value="A=1-1208"/>
</dbReference>
<dbReference type="PDB" id="7SOB">
    <property type="method" value="EM"/>
    <property type="resolution" value="2.40 A"/>
    <property type="chains" value="A/D/K=1-1208"/>
</dbReference>
<dbReference type="PDB" id="7SOC">
    <property type="method" value="EM"/>
    <property type="resolution" value="3.30 A"/>
    <property type="chains" value="A=1-1208"/>
</dbReference>
<dbReference type="PDB" id="7SOD">
    <property type="method" value="EM"/>
    <property type="resolution" value="3.20 A"/>
    <property type="chains" value="A=1-1208"/>
</dbReference>
<dbReference type="PDB" id="7SOE">
    <property type="method" value="EM"/>
    <property type="resolution" value="2.80 A"/>
    <property type="chains" value="A/C/F=1-1208"/>
</dbReference>
<dbReference type="PDB" id="7SOF">
    <property type="method" value="EM"/>
    <property type="resolution" value="3.60 A"/>
    <property type="chains" value="A=1-1208"/>
</dbReference>
<dbReference type="PDB" id="7SPO">
    <property type="method" value="X-ray"/>
    <property type="resolution" value="1.92 A"/>
    <property type="chains" value="A/B=330-532"/>
</dbReference>
<dbReference type="PDB" id="7SPP">
    <property type="method" value="X-ray"/>
    <property type="resolution" value="1.96 A"/>
    <property type="chains" value="A=319-535"/>
</dbReference>
<dbReference type="PDB" id="7SWN">
    <property type="method" value="EM"/>
    <property type="resolution" value="4.30 A"/>
    <property type="chains" value="A=334-527"/>
</dbReference>
<dbReference type="PDB" id="7SWO">
    <property type="method" value="EM"/>
    <property type="resolution" value="4.10 A"/>
    <property type="chains" value="A=334-528"/>
</dbReference>
<dbReference type="PDB" id="7SWP">
    <property type="method" value="EM"/>
    <property type="resolution" value="3.80 A"/>
    <property type="chains" value="A=334-528"/>
</dbReference>
<dbReference type="PDB" id="7SWW">
    <property type="method" value="EM"/>
    <property type="resolution" value="3.13 A"/>
    <property type="chains" value="A=14-304"/>
</dbReference>
<dbReference type="PDB" id="7SWX">
    <property type="method" value="EM"/>
    <property type="resolution" value="3.13 A"/>
    <property type="chains" value="A/B/C=14-1146"/>
</dbReference>
<dbReference type="PDB" id="7SXR">
    <property type="method" value="EM"/>
    <property type="resolution" value="3.00 A"/>
    <property type="chains" value="A/B/C=1-1208"/>
</dbReference>
<dbReference type="PDB" id="7SXS">
    <property type="method" value="EM"/>
    <property type="resolution" value="2.64 A"/>
    <property type="chains" value="A/B/C=1-1208"/>
</dbReference>
<dbReference type="PDB" id="7SXT">
    <property type="method" value="EM"/>
    <property type="resolution" value="2.31 A"/>
    <property type="chains" value="A/B/C=1-1208"/>
</dbReference>
<dbReference type="PDB" id="7SXU">
    <property type="method" value="EM"/>
    <property type="resolution" value="3.00 A"/>
    <property type="chains" value="A/B/C=1-1208"/>
</dbReference>
<dbReference type="PDB" id="7SXV">
    <property type="method" value="EM"/>
    <property type="resolution" value="2.79 A"/>
    <property type="chains" value="A/B/C=1-1208"/>
</dbReference>
<dbReference type="PDB" id="7SXW">
    <property type="method" value="EM"/>
    <property type="resolution" value="2.85 A"/>
    <property type="chains" value="A/B/C=1-1208"/>
</dbReference>
<dbReference type="PDB" id="7SXX">
    <property type="method" value="EM"/>
    <property type="resolution" value="2.66 A"/>
    <property type="chains" value="A/B/C=1-1208"/>
</dbReference>
<dbReference type="PDB" id="7SXY">
    <property type="method" value="EM"/>
    <property type="resolution" value="2.79 A"/>
    <property type="chains" value="B=1-1208"/>
</dbReference>
<dbReference type="PDB" id="7SXZ">
    <property type="method" value="EM"/>
    <property type="resolution" value="2.61 A"/>
    <property type="chains" value="A/B/C=1-1208"/>
</dbReference>
<dbReference type="PDB" id="7SY0">
    <property type="method" value="EM"/>
    <property type="resolution" value="3.00 A"/>
    <property type="chains" value="B=1-1208"/>
</dbReference>
<dbReference type="PDB" id="7SY1">
    <property type="method" value="EM"/>
    <property type="resolution" value="2.83 A"/>
    <property type="chains" value="A/B/C=1-1208"/>
</dbReference>
<dbReference type="PDB" id="7SY2">
    <property type="method" value="EM"/>
    <property type="resolution" value="3.11 A"/>
    <property type="chains" value="B=1-1208"/>
</dbReference>
<dbReference type="PDB" id="7SY3">
    <property type="method" value="EM"/>
    <property type="resolution" value="2.95 A"/>
    <property type="chains" value="A/B/C=1-1208"/>
</dbReference>
<dbReference type="PDB" id="7SY4">
    <property type="method" value="EM"/>
    <property type="resolution" value="3.35 A"/>
    <property type="chains" value="B=1-1208"/>
</dbReference>
<dbReference type="PDB" id="7SY5">
    <property type="method" value="EM"/>
    <property type="resolution" value="2.59 A"/>
    <property type="chains" value="A/B/C=1-1208"/>
</dbReference>
<dbReference type="PDB" id="7SY6">
    <property type="method" value="EM"/>
    <property type="resolution" value="2.81 A"/>
    <property type="chains" value="B=1-1208"/>
</dbReference>
<dbReference type="PDB" id="7SY7">
    <property type="method" value="EM"/>
    <property type="resolution" value="2.81 A"/>
    <property type="chains" value="A/B/C=1-1208"/>
</dbReference>
<dbReference type="PDB" id="7SY8">
    <property type="method" value="EM"/>
    <property type="resolution" value="3.14 A"/>
    <property type="chains" value="B=1-1208"/>
</dbReference>
<dbReference type="PDB" id="7T01">
    <property type="method" value="EM"/>
    <property type="resolution" value="2.69 A"/>
    <property type="chains" value="A=329-529"/>
</dbReference>
<dbReference type="PDB" id="7T3M">
    <property type="method" value="EM"/>
    <property type="resolution" value="3.00 A"/>
    <property type="chains" value="A/C/G=1-1149"/>
</dbReference>
<dbReference type="PDB" id="7T5O">
    <property type="method" value="EM"/>
    <property type="resolution" value="3.39 A"/>
    <property type="chains" value="A/B/C=14-1216"/>
</dbReference>
<dbReference type="PDB" id="7T67">
    <property type="method" value="EM"/>
    <property type="resolution" value="3.00 A"/>
    <property type="chains" value="A/C/G=1-1149"/>
</dbReference>
<dbReference type="PDB" id="7T72">
    <property type="method" value="X-ray"/>
    <property type="resolution" value="3.18 A"/>
    <property type="chains" value="A=333-528"/>
</dbReference>
<dbReference type="PDB" id="7T7B">
    <property type="method" value="X-ray"/>
    <property type="resolution" value="2.59 A"/>
    <property type="chains" value="A=333-530"/>
</dbReference>
<dbReference type="PDB" id="7T9J">
    <property type="method" value="EM"/>
    <property type="resolution" value="2.79 A"/>
    <property type="chains" value="A/B/C=1-1208"/>
</dbReference>
<dbReference type="PDB" id="7T9K">
    <property type="method" value="EM"/>
    <property type="resolution" value="2.45 A"/>
    <property type="chains" value="A/B/C=1-1208"/>
</dbReference>
<dbReference type="PDB" id="7T9L">
    <property type="method" value="EM"/>
    <property type="resolution" value="2.66 A"/>
    <property type="chains" value="A=1-1208"/>
</dbReference>
<dbReference type="PDB" id="7TAS">
    <property type="method" value="EM"/>
    <property type="resolution" value="3.20 A"/>
    <property type="chains" value="E=1-1208"/>
</dbReference>
<dbReference type="PDB" id="7TAT">
    <property type="method" value="EM"/>
    <property type="resolution" value="3.20 A"/>
    <property type="chains" value="A/B/C=1-1208"/>
</dbReference>
<dbReference type="PDB" id="7TB8">
    <property type="method" value="EM"/>
    <property type="resolution" value="2.83 A"/>
    <property type="chains" value="A/B/C=14-1208"/>
</dbReference>
<dbReference type="PDB" id="7TBF">
    <property type="method" value="EM"/>
    <property type="resolution" value="3.10 A"/>
    <property type="chains" value="A=332-527"/>
</dbReference>
<dbReference type="PDB" id="7TC9">
    <property type="method" value="EM"/>
    <property type="resolution" value="5.08 A"/>
    <property type="chains" value="B=332-526"/>
</dbReference>
<dbReference type="PDB" id="7TCA">
    <property type="method" value="EM"/>
    <property type="resolution" value="3.85 A"/>
    <property type="chains" value="A/B/C=14-1205"/>
</dbReference>
<dbReference type="PDB" id="7TCC">
    <property type="method" value="EM"/>
    <property type="resolution" value="3.86 A"/>
    <property type="chains" value="A/B/C=14-1205"/>
</dbReference>
<dbReference type="PDB" id="7TCQ">
    <property type="method" value="X-ray"/>
    <property type="resolution" value="2.02 A"/>
    <property type="chains" value="C/D=1148-1157"/>
</dbReference>
<dbReference type="PDB" id="7TE1">
    <property type="method" value="X-ray"/>
    <property type="resolution" value="3.50 A"/>
    <property type="chains" value="D/E=319-529"/>
</dbReference>
<dbReference type="PDB" id="7TEW">
    <property type="method" value="EM"/>
    <property type="resolution" value="3.52 A"/>
    <property type="chains" value="B=1-1206"/>
</dbReference>
<dbReference type="PDB" id="7TEX">
    <property type="method" value="EM"/>
    <property type="resolution" value="3.27 A"/>
    <property type="chains" value="A/B/C=1-1206"/>
</dbReference>
<dbReference type="PDB" id="7TEY">
    <property type="method" value="EM"/>
    <property type="resolution" value="2.25 A"/>
    <property type="chains" value="A/B/C=1-1206"/>
</dbReference>
<dbReference type="PDB" id="7TEZ">
    <property type="method" value="EM"/>
    <property type="resolution" value="3.27 A"/>
    <property type="chains" value="B=1-1208"/>
</dbReference>
<dbReference type="PDB" id="7TF0">
    <property type="method" value="EM"/>
    <property type="resolution" value="3.02 A"/>
    <property type="chains" value="A/B/C=1-1208"/>
</dbReference>
<dbReference type="PDB" id="7TF1">
    <property type="method" value="EM"/>
    <property type="resolution" value="3.57 A"/>
    <property type="chains" value="A/B/C/D/E/F=1-1208"/>
</dbReference>
<dbReference type="PDB" id="7TF2">
    <property type="method" value="EM"/>
    <property type="resolution" value="3.62 A"/>
    <property type="chains" value="A/B/C/D/E/F=1-1208"/>
</dbReference>
<dbReference type="PDB" id="7TF3">
    <property type="method" value="EM"/>
    <property type="resolution" value="2.25 A"/>
    <property type="chains" value="A/B/C=1-1208"/>
</dbReference>
<dbReference type="PDB" id="7TF4">
    <property type="method" value="EM"/>
    <property type="resolution" value="3.01 A"/>
    <property type="chains" value="A/B/C/D/E/F=1-1208"/>
</dbReference>
<dbReference type="PDB" id="7TF5">
    <property type="method" value="EM"/>
    <property type="resolution" value="3.16 A"/>
    <property type="chains" value="A/B/C/D/E/F=1-1208"/>
</dbReference>
<dbReference type="PDB" id="7TGE">
    <property type="method" value="EM"/>
    <property type="resolution" value="3.68 A"/>
    <property type="chains" value="A/B/C=1-1147"/>
</dbReference>
<dbReference type="PDB" id="7TGW">
    <property type="method" value="EM"/>
    <property type="resolution" value="3.00 A"/>
    <property type="chains" value="A/B/C=14-1211"/>
</dbReference>
<dbReference type="PDB" id="7TGX">
    <property type="method" value="EM"/>
    <property type="resolution" value="3.20 A"/>
    <property type="chains" value="A/B/C=14-1211"/>
</dbReference>
<dbReference type="PDB" id="7TGY">
    <property type="method" value="EM"/>
    <property type="resolution" value="3.00 A"/>
    <property type="chains" value="A/B/C=14-1211"/>
</dbReference>
<dbReference type="PDB" id="7THE">
    <property type="method" value="EM"/>
    <property type="resolution" value="3.79 A"/>
    <property type="chains" value="A=333-527"/>
</dbReference>
<dbReference type="PDB" id="7THK">
    <property type="method" value="EM"/>
    <property type="resolution" value="3.11 A"/>
    <property type="chains" value="A/B/C=1-1205"/>
</dbReference>
<dbReference type="PDB" id="7THT">
    <property type="method" value="EM"/>
    <property type="resolution" value="3.42 A"/>
    <property type="chains" value="C/S/V=27-1147"/>
</dbReference>
<dbReference type="PDB" id="7TIK">
    <property type="method" value="EM"/>
    <property type="resolution" value="2.40 A"/>
    <property type="chains" value="A/B/C=917-988, D/E/F=1157-1201"/>
</dbReference>
<dbReference type="PDB" id="7TLA">
    <property type="method" value="EM"/>
    <property type="resolution" value="3.13 A"/>
    <property type="chains" value="A/B/C=1-1208"/>
</dbReference>
<dbReference type="PDB" id="7TLB">
    <property type="method" value="EM"/>
    <property type="resolution" value="3.06 A"/>
    <property type="chains" value="A/B/C=1-1208"/>
</dbReference>
<dbReference type="PDB" id="7TLC">
    <property type="method" value="EM"/>
    <property type="resolution" value="2.83 A"/>
    <property type="chains" value="A/B/C=1-1208"/>
</dbReference>
<dbReference type="PDB" id="7TLD">
    <property type="method" value="EM"/>
    <property type="resolution" value="2.89 A"/>
    <property type="chains" value="A/B/C=1-1208"/>
</dbReference>
<dbReference type="PDB" id="7TLT">
    <property type="method" value="X-ray"/>
    <property type="resolution" value="2.30 A"/>
    <property type="chains" value="E/F=489-497"/>
</dbReference>
<dbReference type="PDB" id="7TN0">
    <property type="method" value="X-ray"/>
    <property type="resolution" value="2.85 A"/>
    <property type="chains" value="I/S=324-531"/>
</dbReference>
<dbReference type="PDB" id="7TOU">
    <property type="method" value="EM"/>
    <property type="resolution" value="3.24 A"/>
    <property type="chains" value="A/B/C=1-1208"/>
</dbReference>
<dbReference type="PDB" id="7TOV">
    <property type="method" value="EM"/>
    <property type="resolution" value="3.16 A"/>
    <property type="chains" value="A/B/C=1-1208"/>
</dbReference>
<dbReference type="PDB" id="7TOW">
    <property type="method" value="X-ray"/>
    <property type="resolution" value="2.15 A"/>
    <property type="chains" value="D/E=808-833"/>
</dbReference>
<dbReference type="PDB" id="7TOX">
    <property type="method" value="EM"/>
    <property type="resolution" value="3.62 A"/>
    <property type="chains" value="A/B/C=1-1208"/>
</dbReference>
<dbReference type="PDB" id="7TOY">
    <property type="method" value="EM"/>
    <property type="resolution" value="3.53 A"/>
    <property type="chains" value="A/B/C=1-1208"/>
</dbReference>
<dbReference type="PDB" id="7TOZ">
    <property type="method" value="EM"/>
    <property type="resolution" value="4.07 A"/>
    <property type="chains" value="A/B/C=1-1208"/>
</dbReference>
<dbReference type="PDB" id="7TP0">
    <property type="method" value="EM"/>
    <property type="resolution" value="3.57 A"/>
    <property type="chains" value="A/B/C=1-1208"/>
</dbReference>
<dbReference type="PDB" id="7TP1">
    <property type="method" value="EM"/>
    <property type="resolution" value="3.81 A"/>
    <property type="chains" value="A/B/C=1-1208"/>
</dbReference>
<dbReference type="PDB" id="7TP2">
    <property type="method" value="EM"/>
    <property type="resolution" value="3.72 A"/>
    <property type="chains" value="A/B/C=1-1208"/>
</dbReference>
<dbReference type="PDB" id="7TP3">
    <property type="method" value="X-ray"/>
    <property type="resolution" value="2.33 A"/>
    <property type="chains" value="Z=319-541"/>
</dbReference>
<dbReference type="PDB" id="7TP4">
    <property type="method" value="X-ray"/>
    <property type="resolution" value="1.95 A"/>
    <property type="chains" value="Z=333-530"/>
</dbReference>
<dbReference type="PDB" id="7TP7">
    <property type="method" value="EM"/>
    <property type="resolution" value="3.48 A"/>
    <property type="chains" value="A/B/C=1-1208"/>
</dbReference>
<dbReference type="PDB" id="7TP8">
    <property type="method" value="EM"/>
    <property type="resolution" value="3.40 A"/>
    <property type="chains" value="A/B/C=1-1208"/>
</dbReference>
<dbReference type="PDB" id="7TP9">
    <property type="method" value="EM"/>
    <property type="resolution" value="3.48 A"/>
    <property type="chains" value="A/B/C=1-1208"/>
</dbReference>
<dbReference type="PDB" id="7TPA">
    <property type="method" value="EM"/>
    <property type="resolution" value="3.60 A"/>
    <property type="chains" value="A/B/C=1-1208"/>
</dbReference>
<dbReference type="PDB" id="7TPC">
    <property type="method" value="EM"/>
    <property type="resolution" value="3.91 A"/>
    <property type="chains" value="A/B/C=1-1208"/>
</dbReference>
<dbReference type="PDB" id="7TPE">
    <property type="method" value="EM"/>
    <property type="resolution" value="4.00 A"/>
    <property type="chains" value="A/B/C=1-1208"/>
</dbReference>
<dbReference type="PDB" id="7TPF">
    <property type="method" value="EM"/>
    <property type="resolution" value="3.40 A"/>
    <property type="chains" value="A/B/C=1-1208"/>
</dbReference>
<dbReference type="PDB" id="7TPH">
    <property type="method" value="EM"/>
    <property type="resolution" value="3.58 A"/>
    <property type="chains" value="A/B/C=1-1208"/>
</dbReference>
<dbReference type="PDB" id="7TPI">
    <property type="method" value="EM"/>
    <property type="resolution" value="2.30 A"/>
    <property type="chains" value="A/B/C=1-1208"/>
</dbReference>
<dbReference type="PDB" id="7TPK">
    <property type="method" value="EM"/>
    <property type="resolution" value="3.40 A"/>
    <property type="chains" value="E=333-526"/>
</dbReference>
<dbReference type="PDB" id="7TPL">
    <property type="method" value="EM"/>
    <property type="resolution" value="3.87 A"/>
    <property type="chains" value="A/B/C=1-1208"/>
</dbReference>
<dbReference type="PDB" id="7TPR">
    <property type="method" value="EM"/>
    <property type="resolution" value="2.39 A"/>
    <property type="chains" value="A/B/C=15-1159"/>
</dbReference>
<dbReference type="PDB" id="7TYZ">
    <property type="method" value="EM"/>
    <property type="resolution" value="3.51 A"/>
    <property type="chains" value="A/C/E=14-1208"/>
</dbReference>
<dbReference type="PDB" id="7TZ0">
    <property type="method" value="EM"/>
    <property type="resolution" value="4.17 A"/>
    <property type="chains" value="A=14-1208"/>
</dbReference>
<dbReference type="PDB" id="7U0D">
    <property type="method" value="EM"/>
    <property type="resolution" value="4.80 A"/>
    <property type="chains" value="B=331-526"/>
</dbReference>
<dbReference type="PDB" id="7U0P">
    <property type="method" value="EM"/>
    <property type="resolution" value="3.76 A"/>
    <property type="chains" value="A/B/C=1-1208"/>
</dbReference>
<dbReference type="PDB" id="7U0Q">
    <property type="method" value="EM"/>
    <property type="resolution" value="3.86 A"/>
    <property type="chains" value="A/B/C=1-1208"/>
</dbReference>
<dbReference type="PDB" id="7U0X">
    <property type="method" value="EM"/>
    <property type="resolution" value="3.82 A"/>
    <property type="chains" value="A/B/C=1-1208"/>
</dbReference>
<dbReference type="PDB" id="7U1R">
    <property type="method" value="X-ray"/>
    <property type="resolution" value="1.80 A"/>
    <property type="chains" value="C=1185-1193"/>
</dbReference>
<dbReference type="PDB" id="7U2D">
    <property type="method" value="X-ray"/>
    <property type="resolution" value="2.76 A"/>
    <property type="chains" value="A=333-530"/>
</dbReference>
<dbReference type="PDB" id="7U2E">
    <property type="method" value="X-ray"/>
    <property type="resolution" value="2.85 A"/>
    <property type="chains" value="A=333-530"/>
</dbReference>
<dbReference type="PDB" id="7U8E">
    <property type="method" value="X-ray"/>
    <property type="resolution" value="2.29 A"/>
    <property type="chains" value="A=331-527"/>
</dbReference>
<dbReference type="PDB" id="7U9O">
    <property type="method" value="EM"/>
    <property type="resolution" value="3.40 A"/>
    <property type="chains" value="A/B=14-1208"/>
</dbReference>
<dbReference type="PDB" id="7U9P">
    <property type="method" value="EM"/>
    <property type="resolution" value="3.50 A"/>
    <property type="chains" value="A/B=14-1208"/>
</dbReference>
<dbReference type="PDB" id="7UAP">
    <property type="method" value="EM"/>
    <property type="resolution" value="2.80 A"/>
    <property type="chains" value="A/B/C=1-1213"/>
</dbReference>
<dbReference type="PDB" id="7UAQ">
    <property type="method" value="EM"/>
    <property type="resolution" value="3.10 A"/>
    <property type="chains" value="A=1-1213"/>
</dbReference>
<dbReference type="PDB" id="7UAR">
    <property type="method" value="EM"/>
    <property type="resolution" value="3.50 A"/>
    <property type="chains" value="A/B/C=1-1213"/>
</dbReference>
<dbReference type="PDB" id="7UB0">
    <property type="method" value="EM"/>
    <property type="resolution" value="3.31 A"/>
    <property type="chains" value="A/B/C=1-1208"/>
</dbReference>
<dbReference type="PDB" id="7UB5">
    <property type="method" value="EM"/>
    <property type="resolution" value="3.35 A"/>
    <property type="chains" value="A/B/C=1-1208"/>
</dbReference>
<dbReference type="PDB" id="7UB6">
    <property type="method" value="EM"/>
    <property type="resolution" value="3.52 A"/>
    <property type="chains" value="A/B/C=1-1208"/>
</dbReference>
<dbReference type="PDB" id="7UFK">
    <property type="method" value="X-ray"/>
    <property type="resolution" value="2.38 A"/>
    <property type="chains" value="E/F=319-535"/>
</dbReference>
<dbReference type="PDB" id="7UFL">
    <property type="method" value="X-ray"/>
    <property type="resolution" value="2.84 A"/>
    <property type="chains" value="E/F=319-535"/>
</dbReference>
<dbReference type="PDB" id="7UHB">
    <property type="method" value="EM"/>
    <property type="resolution" value="3.00 A"/>
    <property type="chains" value="C=1-1208"/>
</dbReference>
<dbReference type="PDB" id="7UHC">
    <property type="method" value="EM"/>
    <property type="resolution" value="3.10 A"/>
    <property type="chains" value="A/B/D=1-1208"/>
</dbReference>
<dbReference type="PDB" id="7UKL">
    <property type="method" value="EM"/>
    <property type="resolution" value="3.09 A"/>
    <property type="chains" value="A/B/C=1-1273"/>
</dbReference>
<dbReference type="PDB" id="7UKM">
    <property type="method" value="EM"/>
    <property type="resolution" value="3.03 A"/>
    <property type="chains" value="A/B/C=1-1273"/>
</dbReference>
<dbReference type="PDB" id="7UL0">
    <property type="method" value="X-ray"/>
    <property type="resolution" value="2.49 A"/>
    <property type="chains" value="A=319-537"/>
</dbReference>
<dbReference type="PDB" id="7UL1">
    <property type="method" value="X-ray"/>
    <property type="resolution" value="2.65 A"/>
    <property type="chains" value="A=329-538"/>
</dbReference>
<dbReference type="PDB" id="7UM2">
    <property type="method" value="X-ray"/>
    <property type="resolution" value="1.63 A"/>
    <property type="chains" value="C=418-425"/>
</dbReference>
<dbReference type="PDB" id="7UOW">
    <property type="method" value="EM"/>
    <property type="resolution" value="4.40 A"/>
    <property type="chains" value="A/B/C=1-1208"/>
</dbReference>
<dbReference type="PDB" id="7UPW">
    <property type="method" value="EM"/>
    <property type="resolution" value="3.44 A"/>
    <property type="chains" value="A/B/C=1-1273"/>
</dbReference>
<dbReference type="PDB" id="7UPX">
    <property type="method" value="EM"/>
    <property type="resolution" value="3.20 A"/>
    <property type="chains" value="A=1-1273"/>
</dbReference>
<dbReference type="PDB" id="7UPY">
    <property type="method" value="EM"/>
    <property type="resolution" value="3.44 A"/>
    <property type="chains" value="A/B/C=1-1273"/>
</dbReference>
<dbReference type="PDB" id="7UR1">
    <property type="method" value="X-ray"/>
    <property type="resolution" value="2.17 A"/>
    <property type="chains" value="C=1215-1224"/>
</dbReference>
<dbReference type="PDB" id="7URQ">
    <property type="method" value="X-ray"/>
    <property type="resolution" value="2.05 A"/>
    <property type="chains" value="A=319-537"/>
</dbReference>
<dbReference type="PDB" id="7URS">
    <property type="method" value="X-ray"/>
    <property type="resolution" value="2.40 A"/>
    <property type="chains" value="A=319-541"/>
</dbReference>
<dbReference type="PDB" id="7UZ4">
    <property type="method" value="EM"/>
    <property type="resolution" value="3.10 A"/>
    <property type="chains" value="A/B/C=1-1213"/>
</dbReference>
<dbReference type="PDB" id="7UZ5">
    <property type="method" value="EM"/>
    <property type="resolution" value="3.20 A"/>
    <property type="chains" value="A/B/C=1-1213"/>
</dbReference>
<dbReference type="PDB" id="7UZ6">
    <property type="method" value="EM"/>
    <property type="resolution" value="2.80 A"/>
    <property type="chains" value="A/B/C=1-1213"/>
</dbReference>
<dbReference type="PDB" id="7UZ7">
    <property type="method" value="EM"/>
    <property type="resolution" value="2.90 A"/>
    <property type="chains" value="A/B/C=1-1213"/>
</dbReference>
<dbReference type="PDB" id="7UZ9">
    <property type="method" value="EM"/>
    <property type="resolution" value="3.50 A"/>
    <property type="chains" value="A/B/C=1-1213"/>
</dbReference>
<dbReference type="PDB" id="7UZA">
    <property type="method" value="EM"/>
    <property type="resolution" value="3.10 A"/>
    <property type="chains" value="A/B/C=1-1213"/>
</dbReference>
<dbReference type="PDB" id="7UZB">
    <property type="method" value="EM"/>
    <property type="resolution" value="4.10 A"/>
    <property type="chains" value="A=1-1213"/>
</dbReference>
<dbReference type="PDB" id="7UZC">
    <property type="method" value="X-ray"/>
    <property type="resolution" value="2.20 A"/>
    <property type="chains" value="A/B=328-533"/>
</dbReference>
<dbReference type="PDB" id="7UZD">
    <property type="method" value="X-ray"/>
    <property type="resolution" value="3.00 A"/>
    <property type="chains" value="A=328-533"/>
</dbReference>
<dbReference type="PDB" id="7V20">
    <property type="method" value="EM"/>
    <property type="resolution" value="2.86 A"/>
    <property type="chains" value="A/B/C=1-1208"/>
</dbReference>
<dbReference type="PDB" id="7V22">
    <property type="method" value="EM"/>
    <property type="resolution" value="3.38 A"/>
    <property type="chains" value="A=1-1208"/>
</dbReference>
<dbReference type="PDB" id="7V23">
    <property type="method" value="EM"/>
    <property type="resolution" value="2.96 A"/>
    <property type="chains" value="A/B/C=1-1208"/>
</dbReference>
<dbReference type="PDB" id="7V24">
    <property type="method" value="EM"/>
    <property type="resolution" value="3.29 A"/>
    <property type="chains" value="A=1-1208"/>
</dbReference>
<dbReference type="PDB" id="7V26">
    <property type="method" value="EM"/>
    <property type="resolution" value="3.85 A"/>
    <property type="chains" value="A/C/E=1-1208"/>
</dbReference>
<dbReference type="PDB" id="7V27">
    <property type="method" value="EM"/>
    <property type="resolution" value="4.18 A"/>
    <property type="chains" value="C=334-527"/>
</dbReference>
<dbReference type="PDB" id="7V2A">
    <property type="method" value="EM"/>
    <property type="resolution" value="3.40 A"/>
    <property type="chains" value="A/B/C=1-1208"/>
</dbReference>
<dbReference type="PDB" id="7V76">
    <property type="method" value="EM"/>
    <property type="resolution" value="3.20 A"/>
    <property type="chains" value="A/B/C=1-1208"/>
</dbReference>
<dbReference type="PDB" id="7V77">
    <property type="method" value="EM"/>
    <property type="resolution" value="3.30 A"/>
    <property type="chains" value="A/B/C=1-1208"/>
</dbReference>
<dbReference type="PDB" id="7V78">
    <property type="method" value="EM"/>
    <property type="resolution" value="3.40 A"/>
    <property type="chains" value="A/B/C=1-1208"/>
</dbReference>
<dbReference type="PDB" id="7V79">
    <property type="method" value="EM"/>
    <property type="resolution" value="3.30 A"/>
    <property type="chains" value="A/B/C=1-1208"/>
</dbReference>
<dbReference type="PDB" id="7V7A">
    <property type="method" value="EM"/>
    <property type="resolution" value="3.40 A"/>
    <property type="chains" value="A/B/C=1-1208"/>
</dbReference>
<dbReference type="PDB" id="7V7D">
    <property type="method" value="EM"/>
    <property type="resolution" value="3.00 A"/>
    <property type="chains" value="A/B/C=1-1208"/>
</dbReference>
<dbReference type="PDB" id="7V7E">
    <property type="method" value="EM"/>
    <property type="resolution" value="2.90 A"/>
    <property type="chains" value="A/B/C=1-1208"/>
</dbReference>
<dbReference type="PDB" id="7V7F">
    <property type="method" value="EM"/>
    <property type="resolution" value="2.90 A"/>
    <property type="chains" value="A/B/C=1-1208"/>
</dbReference>
<dbReference type="PDB" id="7V7G">
    <property type="method" value="EM"/>
    <property type="resolution" value="3.10 A"/>
    <property type="chains" value="A/B/C=1-1208"/>
</dbReference>
<dbReference type="PDB" id="7V7H">
    <property type="method" value="EM"/>
    <property type="resolution" value="3.20 A"/>
    <property type="chains" value="A/B/C/D/E/F=1-1208"/>
</dbReference>
<dbReference type="PDB" id="7V7I">
    <property type="method" value="EM"/>
    <property type="resolution" value="3.30 A"/>
    <property type="chains" value="A/B/C/D/E/F=1-1208"/>
</dbReference>
<dbReference type="PDB" id="7V7J">
    <property type="method" value="EM"/>
    <property type="resolution" value="3.40 A"/>
    <property type="chains" value="A/B/C/D/E/F=1-1208"/>
</dbReference>
<dbReference type="PDB" id="7V7N">
    <property type="method" value="EM"/>
    <property type="resolution" value="2.90 A"/>
    <property type="chains" value="A/B/C=1-1208"/>
</dbReference>
<dbReference type="PDB" id="7V7O">
    <property type="method" value="EM"/>
    <property type="resolution" value="2.90 A"/>
    <property type="chains" value="A/B/C=1-1208"/>
</dbReference>
<dbReference type="PDB" id="7V7P">
    <property type="method" value="EM"/>
    <property type="resolution" value="2.90 A"/>
    <property type="chains" value="A/B/C=1-1208"/>
</dbReference>
<dbReference type="PDB" id="7V7Q">
    <property type="method" value="EM"/>
    <property type="resolution" value="2.80 A"/>
    <property type="chains" value="A/B/C=1-1208"/>
</dbReference>
<dbReference type="PDB" id="7V7R">
    <property type="method" value="EM"/>
    <property type="resolution" value="2.90 A"/>
    <property type="chains" value="A/B/C=1-1208"/>
</dbReference>
<dbReference type="PDB" id="7V7S">
    <property type="method" value="EM"/>
    <property type="resolution" value="3.00 A"/>
    <property type="chains" value="A/B/C=1-1208"/>
</dbReference>
<dbReference type="PDB" id="7V7T">
    <property type="method" value="EM"/>
    <property type="resolution" value="3.00 A"/>
    <property type="chains" value="A/B/C=1-1208"/>
</dbReference>
<dbReference type="PDB" id="7V7U">
    <property type="method" value="EM"/>
    <property type="resolution" value="3.00 A"/>
    <property type="chains" value="A/B/C=1-1208"/>
</dbReference>
<dbReference type="PDB" id="7V7V">
    <property type="method" value="EM"/>
    <property type="resolution" value="3.10 A"/>
    <property type="chains" value="A/B/C=1-1208"/>
</dbReference>
<dbReference type="PDB" id="7V7Z">
    <property type="method" value="EM"/>
    <property type="resolution" value="3.10 A"/>
    <property type="chains" value="A/B/C=1-1208"/>
</dbReference>
<dbReference type="PDB" id="7V80">
    <property type="method" value="EM"/>
    <property type="resolution" value="3.90 A"/>
    <property type="chains" value="A=1-1208"/>
</dbReference>
<dbReference type="PDB" id="7V81">
    <property type="method" value="EM"/>
    <property type="resolution" value="3.20 A"/>
    <property type="chains" value="A/B/C=1-1208"/>
</dbReference>
<dbReference type="PDB" id="7V82">
    <property type="method" value="EM"/>
    <property type="resolution" value="2.80 A"/>
    <property type="chains" value="A/B/C=1-1208"/>
</dbReference>
<dbReference type="PDB" id="7V83">
    <property type="method" value="EM"/>
    <property type="resolution" value="2.80 A"/>
    <property type="chains" value="A/B/C=1-1208"/>
</dbReference>
<dbReference type="PDB" id="7V84">
    <property type="method" value="EM"/>
    <property type="resolution" value="3.00 A"/>
    <property type="chains" value="A=1-1208"/>
</dbReference>
<dbReference type="PDB" id="7V85">
    <property type="method" value="EM"/>
    <property type="resolution" value="3.30 A"/>
    <property type="chains" value="A/B/C=1-1208"/>
</dbReference>
<dbReference type="PDB" id="7V86">
    <property type="method" value="EM"/>
    <property type="resolution" value="2.80 A"/>
    <property type="chains" value="A/B/C=1-1208"/>
</dbReference>
<dbReference type="PDB" id="7V87">
    <property type="method" value="EM"/>
    <property type="resolution" value="3.30 A"/>
    <property type="chains" value="A=1-1208"/>
</dbReference>
<dbReference type="PDB" id="7V88">
    <property type="method" value="EM"/>
    <property type="resolution" value="3.30 A"/>
    <property type="chains" value="A/B/C=1-1208"/>
</dbReference>
<dbReference type="PDB" id="7V89">
    <property type="method" value="EM"/>
    <property type="resolution" value="2.80 A"/>
    <property type="chains" value="A/B/C=1-1208"/>
</dbReference>
<dbReference type="PDB" id="7V8A">
    <property type="method" value="EM"/>
    <property type="resolution" value="2.70 A"/>
    <property type="chains" value="A/B/C=1-1208"/>
</dbReference>
<dbReference type="PDB" id="7V8B">
    <property type="method" value="EM"/>
    <property type="resolution" value="3.20 A"/>
    <property type="chains" value="A=1-1208"/>
</dbReference>
<dbReference type="PDB" id="7V8C">
    <property type="method" value="EM"/>
    <property type="resolution" value="3.40 A"/>
    <property type="chains" value="A/B/C=1-1208"/>
</dbReference>
<dbReference type="PDB" id="7VHH">
    <property type="method" value="EM"/>
    <property type="resolution" value="3.80 A"/>
    <property type="chains" value="A/B/C=14-1148"/>
</dbReference>
<dbReference type="PDB" id="7VHJ">
    <property type="method" value="EM"/>
    <property type="resolution" value="4.20 A"/>
    <property type="chains" value="A/B/C=14-1147"/>
</dbReference>
<dbReference type="PDB" id="7VHK">
    <property type="method" value="EM"/>
    <property type="resolution" value="3.60 A"/>
    <property type="chains" value="A/B/C=27-1147"/>
</dbReference>
<dbReference type="PDB" id="7VHL">
    <property type="method" value="EM"/>
    <property type="resolution" value="3.90 A"/>
    <property type="chains" value="A/B/C=14-1147"/>
</dbReference>
<dbReference type="PDB" id="7VHM">
    <property type="method" value="EM"/>
    <property type="resolution" value="3.20 A"/>
    <property type="chains" value="A/B/C=14-1147"/>
</dbReference>
<dbReference type="PDB" id="7VHN">
    <property type="method" value="EM"/>
    <property type="resolution" value="3.80 A"/>
    <property type="chains" value="A/B/C=14-1148"/>
</dbReference>
<dbReference type="PDB" id="7VMU">
    <property type="method" value="X-ray"/>
    <property type="resolution" value="2.89 A"/>
    <property type="chains" value="B=335-515"/>
</dbReference>
<dbReference type="PDB" id="7VNB">
    <property type="method" value="X-ray"/>
    <property type="resolution" value="2.27 A"/>
    <property type="chains" value="B=319-531"/>
</dbReference>
<dbReference type="PDB" id="7VNC">
    <property type="method" value="EM"/>
    <property type="resolution" value="3.70 A"/>
    <property type="chains" value="A/B/C=14-1208"/>
</dbReference>
<dbReference type="PDB" id="7VND">
    <property type="method" value="EM"/>
    <property type="resolution" value="3.60 A"/>
    <property type="chains" value="A/B/C=14-1208"/>
</dbReference>
<dbReference type="PDB" id="7VNE">
    <property type="method" value="EM"/>
    <property type="resolution" value="3.50 A"/>
    <property type="chains" value="A/B/C=14-1208"/>
</dbReference>
<dbReference type="PDB" id="7VOA">
    <property type="method" value="X-ray"/>
    <property type="resolution" value="1.80 A"/>
    <property type="chains" value="B=321-528"/>
</dbReference>
<dbReference type="PDB" id="7VQ0">
    <property type="method" value="EM"/>
    <property type="resolution" value="3.03 A"/>
    <property type="chains" value="A/B/C=1-1208"/>
</dbReference>
<dbReference type="PDB" id="7VRV">
    <property type="method" value="EM"/>
    <property type="resolution" value="4.20 A"/>
    <property type="chains" value="A/B/C=13-1213"/>
</dbReference>
<dbReference type="PDB" id="7VRW">
    <property type="method" value="EM"/>
    <property type="resolution" value="3.60 A"/>
    <property type="chains" value="A/B/C=13-1213"/>
</dbReference>
<dbReference type="PDB" id="7VX1">
    <property type="method" value="EM"/>
    <property type="resolution" value="3.50 A"/>
    <property type="chains" value="A/B/C=1-1206"/>
</dbReference>
<dbReference type="PDB" id="7VX4">
    <property type="method" value="EM"/>
    <property type="resolution" value="3.90 A"/>
    <property type="chains" value="E=1-1206"/>
</dbReference>
<dbReference type="PDB" id="7VX5">
    <property type="method" value="EM"/>
    <property type="resolution" value="3.80 A"/>
    <property type="chains" value="E=1-1208"/>
</dbReference>
<dbReference type="PDB" id="7VX9">
    <property type="method" value="EM"/>
    <property type="resolution" value="4.00 A"/>
    <property type="chains" value="A/B/D=14-1146"/>
</dbReference>
<dbReference type="PDB" id="7VXA">
    <property type="method" value="EM"/>
    <property type="resolution" value="3.90 A"/>
    <property type="chains" value="A/B/D=1-1208"/>
</dbReference>
<dbReference type="PDB" id="7VXB">
    <property type="method" value="EM"/>
    <property type="resolution" value="3.90 A"/>
    <property type="chains" value="A/B/D=1-1208"/>
</dbReference>
<dbReference type="PDB" id="7VXC">
    <property type="method" value="EM"/>
    <property type="resolution" value="3.90 A"/>
    <property type="chains" value="A/B/D=1-1208"/>
</dbReference>
<dbReference type="PDB" id="7VXD">
    <property type="method" value="EM"/>
    <property type="resolution" value="4.00 A"/>
    <property type="chains" value="A/B/D=1-1206"/>
</dbReference>
<dbReference type="PDB" id="7VXE">
    <property type="method" value="EM"/>
    <property type="resolution" value="3.20 A"/>
    <property type="chains" value="A/B/C=1-1208"/>
</dbReference>
<dbReference type="PDB" id="7VXF">
    <property type="method" value="EM"/>
    <property type="resolution" value="3.60 A"/>
    <property type="chains" value="A/B/D=1-1206"/>
</dbReference>
<dbReference type="PDB" id="7VXI">
    <property type="method" value="EM"/>
    <property type="resolution" value="3.40 A"/>
    <property type="chains" value="A/B/C=1-1208"/>
</dbReference>
<dbReference type="PDB" id="7VXK">
    <property type="method" value="EM"/>
    <property type="resolution" value="3.70 A"/>
    <property type="chains" value="A/B/D=1-1206"/>
</dbReference>
<dbReference type="PDB" id="7VXM">
    <property type="method" value="EM"/>
    <property type="resolution" value="3.60 A"/>
    <property type="chains" value="A/B/D=1-1206"/>
</dbReference>
<dbReference type="PDB" id="7VYR">
    <property type="method" value="X-ray"/>
    <property type="resolution" value="2.20 A"/>
    <property type="chains" value="C/R=319-541"/>
</dbReference>
<dbReference type="PDB" id="7VZT">
    <property type="method" value="X-ray"/>
    <property type="resolution" value="3.41 A"/>
    <property type="chains" value="A=333-532"/>
</dbReference>
<dbReference type="PDB" id="7W1S">
    <property type="method" value="X-ray"/>
    <property type="resolution" value="2.00 A"/>
    <property type="chains" value="A=320-537"/>
</dbReference>
<dbReference type="PDB" id="7W6U">
    <property type="method" value="X-ray"/>
    <property type="resolution" value="2.56 A"/>
    <property type="chains" value="B=319-541"/>
</dbReference>
<dbReference type="PDB" id="7W8S">
    <property type="method" value="EM"/>
    <property type="resolution" value="2.85 A"/>
    <property type="chains" value="B=319-541"/>
</dbReference>
<dbReference type="PDB" id="7W92">
    <property type="method" value="EM"/>
    <property type="resolution" value="3.10 A"/>
    <property type="chains" value="A/B/C=1-1206"/>
</dbReference>
<dbReference type="PDB" id="7W94">
    <property type="method" value="EM"/>
    <property type="resolution" value="3.40 A"/>
    <property type="chains" value="A/B/C=1-1206"/>
</dbReference>
<dbReference type="PDB" id="7W98">
    <property type="method" value="EM"/>
    <property type="resolution" value="3.60 A"/>
    <property type="chains" value="A/B/C=1-1206"/>
</dbReference>
<dbReference type="PDB" id="7W99">
    <property type="method" value="EM"/>
    <property type="resolution" value="3.40 A"/>
    <property type="chains" value="A/C/D=1-1206"/>
</dbReference>
<dbReference type="PDB" id="7W9B">
    <property type="method" value="EM"/>
    <property type="resolution" value="3.40 A"/>
    <property type="chains" value="B/C/D=1-1206"/>
</dbReference>
<dbReference type="PDB" id="7W9C">
    <property type="method" value="EM"/>
    <property type="resolution" value="3.20 A"/>
    <property type="chains" value="B/C/D=1-1206"/>
</dbReference>
<dbReference type="PDB" id="7W9E">
    <property type="method" value="EM"/>
    <property type="resolution" value="3.10 A"/>
    <property type="chains" value="A/B/C=1-1206"/>
</dbReference>
<dbReference type="PDB" id="7W9F">
    <property type="method" value="EM"/>
    <property type="resolution" value="3.60 A"/>
    <property type="chains" value="E=333-526"/>
</dbReference>
<dbReference type="PDB" id="7W9I">
    <property type="method" value="EM"/>
    <property type="resolution" value="3.40 A"/>
    <property type="chains" value="E=333-526"/>
</dbReference>
<dbReference type="PDB" id="7WA1">
    <property type="method" value="EM"/>
    <property type="resolution" value="2.90 A"/>
    <property type="chains" value="B=319-541"/>
</dbReference>
<dbReference type="PDB" id="7WB5">
    <property type="method" value="EM"/>
    <property type="resolution" value="3.70 A"/>
    <property type="chains" value="R=334-516"/>
</dbReference>
<dbReference type="PDB" id="7WBH">
    <property type="method" value="EM"/>
    <property type="resolution" value="3.70 A"/>
    <property type="chains" value="A/B/C=27-1146"/>
</dbReference>
<dbReference type="PDB" id="7WBL">
    <property type="method" value="EM"/>
    <property type="resolution" value="3.40 A"/>
    <property type="chains" value="B=333-527"/>
</dbReference>
<dbReference type="PDB" id="7WBP">
    <property type="method" value="X-ray"/>
    <property type="resolution" value="3.00 A"/>
    <property type="chains" value="B=319-541"/>
</dbReference>
<dbReference type="PDB" id="7WBQ">
    <property type="method" value="X-ray"/>
    <property type="resolution" value="3.34 A"/>
    <property type="chains" value="B/D=319-541"/>
</dbReference>
<dbReference type="PDB" id="7WBZ">
    <property type="method" value="X-ray"/>
    <property type="resolution" value="2.42 A"/>
    <property type="chains" value="A=319-529"/>
</dbReference>
<dbReference type="PDB" id="7WCD">
    <property type="method" value="EM"/>
    <property type="resolution" value="3.30 A"/>
    <property type="chains" value="C/H/J=1-1208"/>
</dbReference>
<dbReference type="PDB" id="7WCH">
    <property type="method" value="EM"/>
    <property type="resolution" value="3.19 A"/>
    <property type="chains" value="A/B/G=1-1208"/>
</dbReference>
<dbReference type="PDB" id="7WCK">
    <property type="method" value="EM"/>
    <property type="resolution" value="3.49 A"/>
    <property type="chains" value="R=333-531"/>
</dbReference>
<dbReference type="PDB" id="7WCP">
    <property type="method" value="EM"/>
    <property type="resolution" value="3.01 A"/>
    <property type="chains" value="A/B/C=1-1208"/>
</dbReference>
<dbReference type="PDB" id="7WCR">
    <property type="method" value="EM"/>
    <property type="resolution" value="3.50 A"/>
    <property type="chains" value="A=1-1206"/>
</dbReference>
<dbReference type="PDB" id="7WCU">
    <property type="method" value="EM"/>
    <property type="resolution" value="3.09 A"/>
    <property type="chains" value="R=333-531"/>
</dbReference>
<dbReference type="PDB" id="7WCZ">
    <property type="method" value="EM"/>
    <property type="resolution" value="3.50 A"/>
    <property type="chains" value="A/B/C=1-1206"/>
</dbReference>
<dbReference type="PDB" id="7WD0">
    <property type="method" value="EM"/>
    <property type="resolution" value="3.30 A"/>
    <property type="chains" value="A/B/C=1-1206"/>
</dbReference>
<dbReference type="PDB" id="7WD1">
    <property type="method" value="X-ray"/>
    <property type="resolution" value="2.50 A"/>
    <property type="chains" value="A/B=333-528"/>
</dbReference>
<dbReference type="PDB" id="7WD2">
    <property type="method" value="X-ray"/>
    <property type="resolution" value="2.69 A"/>
    <property type="chains" value="A/B=333-530"/>
</dbReference>
<dbReference type="PDB" id="7WD7">
    <property type="method" value="EM"/>
    <property type="resolution" value="3.50 A"/>
    <property type="chains" value="A/B/C=1-1206"/>
</dbReference>
<dbReference type="PDB" id="7WD8">
    <property type="method" value="EM"/>
    <property type="resolution" value="4.30 A"/>
    <property type="chains" value="A/B=1-1206"/>
</dbReference>
<dbReference type="PDB" id="7WD9">
    <property type="method" value="EM"/>
    <property type="resolution" value="3.70 A"/>
    <property type="chains" value="A/B/C=1-1206"/>
</dbReference>
<dbReference type="PDB" id="7WDF">
    <property type="method" value="EM"/>
    <property type="resolution" value="3.90 A"/>
    <property type="chains" value="A/B/C=1-1206"/>
</dbReference>
<dbReference type="PDB" id="7WED">
    <property type="method" value="EM"/>
    <property type="resolution" value="3.50 A"/>
    <property type="chains" value="E=330-530"/>
</dbReference>
<dbReference type="PDB" id="7WEF">
    <property type="method" value="EM"/>
    <property type="resolution" value="3.80 A"/>
    <property type="chains" value="E=330-530"/>
</dbReference>
<dbReference type="PDB" id="7WEV">
    <property type="method" value="EM"/>
    <property type="resolution" value="3.60 A"/>
    <property type="chains" value="A/B/C=1-1206"/>
</dbReference>
<dbReference type="PDB" id="7WG7">
    <property type="method" value="EM"/>
    <property type="resolution" value="4.00 A"/>
    <property type="chains" value="A/B/C=1-1273"/>
</dbReference>
<dbReference type="PDB" id="7WG8">
    <property type="method" value="EM"/>
    <property type="resolution" value="3.90 A"/>
    <property type="chains" value="A/B/C=14-1148"/>
</dbReference>
<dbReference type="PDB" id="7WG9">
    <property type="method" value="EM"/>
    <property type="resolution" value="3.50 A"/>
    <property type="chains" value="A/B/C=1-1273"/>
</dbReference>
<dbReference type="PDB" id="7WGB">
    <property type="method" value="EM"/>
    <property type="resolution" value="3.50 A"/>
    <property type="chains" value="A/B/C=1-1273"/>
</dbReference>
<dbReference type="PDB" id="7WGC">
    <property type="method" value="EM"/>
    <property type="resolution" value="3.60 A"/>
    <property type="chains" value="C=1-1273"/>
</dbReference>
<dbReference type="PDB" id="7WGV">
    <property type="method" value="EM"/>
    <property type="resolution" value="3.20 A"/>
    <property type="chains" value="A/B/C=14-1211"/>
</dbReference>
<dbReference type="PDB" id="7WGX">
    <property type="method" value="EM"/>
    <property type="resolution" value="3.50 A"/>
    <property type="chains" value="A/B/C=14-1211"/>
</dbReference>
<dbReference type="PDB" id="7WGY">
    <property type="method" value="EM"/>
    <property type="resolution" value="4.00 A"/>
    <property type="chains" value="A/B/C=14-1211"/>
</dbReference>
<dbReference type="PDB" id="7WGZ">
    <property type="method" value="EM"/>
    <property type="resolution" value="4.50 A"/>
    <property type="chains" value="A/B/C=14-1211"/>
</dbReference>
<dbReference type="PDB" id="7WH8">
    <property type="method" value="EM"/>
    <property type="resolution" value="3.11 A"/>
    <property type="chains" value="C=317-593"/>
</dbReference>
<dbReference type="PDB" id="7WHB">
    <property type="method" value="EM"/>
    <property type="resolution" value="2.67 A"/>
    <property type="chains" value="A/B/C=27-1146"/>
</dbReference>
<dbReference type="PDB" id="7WHD">
    <property type="method" value="EM"/>
    <property type="resolution" value="2.65 A"/>
    <property type="chains" value="A/B/C=27-1146"/>
</dbReference>
<dbReference type="PDB" id="7WHH">
    <property type="method" value="X-ray"/>
    <property type="resolution" value="2.60 A"/>
    <property type="chains" value="E=333-526"/>
</dbReference>
<dbReference type="PDB" id="7WHJ">
    <property type="method" value="EM"/>
    <property type="resolution" value="3.27 A"/>
    <property type="chains" value="A/B/C=1-1208"/>
</dbReference>
<dbReference type="PDB" id="7WHZ">
    <property type="method" value="EM"/>
    <property type="resolution" value="3.42 A"/>
    <property type="chains" value="A=333-527"/>
</dbReference>
<dbReference type="PDB" id="7WI0">
    <property type="method" value="EM"/>
    <property type="resolution" value="3.82 A"/>
    <property type="chains" value="A=333-527"/>
</dbReference>
<dbReference type="PDB" id="7WK0">
    <property type="method" value="EM"/>
    <property type="resolution" value="3.32 A"/>
    <property type="chains" value="C/F=331-528"/>
</dbReference>
<dbReference type="PDB" id="7WK2">
    <property type="method" value="EM"/>
    <property type="resolution" value="3.10 A"/>
    <property type="chains" value="A/B/C=1-1208"/>
</dbReference>
<dbReference type="PDB" id="7WK3">
    <property type="method" value="EM"/>
    <property type="resolution" value="3.40 A"/>
    <property type="chains" value="A/B/C=1-1208"/>
</dbReference>
<dbReference type="PDB" id="7WK8">
    <property type="method" value="EM"/>
    <property type="resolution" value="3.61 A"/>
    <property type="chains" value="A/B=1-1208"/>
</dbReference>
<dbReference type="PDB" id="7WK9">
    <property type="method" value="EM"/>
    <property type="resolution" value="3.48 A"/>
    <property type="chains" value="A/B/C=1-1208"/>
</dbReference>
<dbReference type="PDB" id="7WKA">
    <property type="method" value="EM"/>
    <property type="resolution" value="3.64 A"/>
    <property type="chains" value="A/B/C=1-1208"/>
</dbReference>
<dbReference type="PDB" id="7WLC">
    <property type="method" value="EM"/>
    <property type="resolution" value="4.00 A"/>
    <property type="chains" value="E=330-530"/>
</dbReference>
<dbReference type="PDB" id="7WN2">
    <property type="method" value="X-ray"/>
    <property type="resolution" value="2.35 A"/>
    <property type="chains" value="A/R=321-536"/>
</dbReference>
<dbReference type="PDB" id="7WNB">
    <property type="method" value="X-ray"/>
    <property type="resolution" value="2.18 A"/>
    <property type="chains" value="R=321-536"/>
</dbReference>
<dbReference type="PDB" id="7WNM">
    <property type="method" value="X-ray"/>
    <property type="resolution" value="2.70 A"/>
    <property type="chains" value="A=319-541"/>
</dbReference>
<dbReference type="PDB" id="7WO4">
    <property type="method" value="EM"/>
    <property type="resolution" value="4.47 A"/>
    <property type="chains" value="A/B/C/J/K/L=1-1208"/>
</dbReference>
<dbReference type="PDB" id="7WO5">
    <property type="method" value="EM"/>
    <property type="resolution" value="3.45 A"/>
    <property type="chains" value="A/B/C=1-1208"/>
</dbReference>
<dbReference type="PDB" id="7WO7">
    <property type="method" value="EM"/>
    <property type="resolution" value="3.80 A"/>
    <property type="chains" value="C=334-527"/>
</dbReference>
<dbReference type="PDB" id="7WOA">
    <property type="method" value="EM"/>
    <property type="resolution" value="3.25 A"/>
    <property type="chains" value="A/C/E=1-1208"/>
</dbReference>
<dbReference type="PDB" id="7WOB">
    <property type="method" value="EM"/>
    <property type="resolution" value="3.25 A"/>
    <property type="chains" value="A/C/E=1-1208"/>
</dbReference>
<dbReference type="PDB" id="7WOC">
    <property type="method" value="EM"/>
    <property type="resolution" value="3.35 A"/>
    <property type="chains" value="C=334-527"/>
</dbReference>
<dbReference type="PDB" id="7WOG">
    <property type="method" value="EM"/>
    <property type="resolution" value="4.06 A"/>
    <property type="chains" value="C=331-528"/>
</dbReference>
<dbReference type="PDB" id="7WON">
    <property type="method" value="EM"/>
    <property type="resolution" value="3.90 A"/>
    <property type="chains" value="F=333-521"/>
</dbReference>
<dbReference type="PDB" id="7WOP">
    <property type="method" value="EM"/>
    <property type="resolution" value="3.51 A"/>
    <property type="chains" value="A=331-528"/>
</dbReference>
<dbReference type="PDB" id="7WP0">
    <property type="method" value="EM"/>
    <property type="resolution" value="3.71 A"/>
    <property type="chains" value="F=333-521"/>
</dbReference>
<dbReference type="PDB" id="7WP1">
    <property type="method" value="EM"/>
    <property type="resolution" value="3.77 A"/>
    <property type="chains" value="F=333-521"/>
</dbReference>
<dbReference type="PDB" id="7WP2">
    <property type="method" value="EM"/>
    <property type="resolution" value="3.52 A"/>
    <property type="chains" value="F=333-521"/>
</dbReference>
<dbReference type="PDB" id="7WP5">
    <property type="method" value="EM"/>
    <property type="resolution" value="3.90 A"/>
    <property type="chains" value="F=333-521"/>
</dbReference>
<dbReference type="PDB" id="7WP6">
    <property type="method" value="EM"/>
    <property type="resolution" value="3.81 A"/>
    <property type="chains" value="F=333-521"/>
</dbReference>
<dbReference type="PDB" id="7WP8">
    <property type="method" value="EM"/>
    <property type="resolution" value="3.88 A"/>
    <property type="chains" value="F=336-518"/>
</dbReference>
<dbReference type="PDB" id="7WPH">
    <property type="method" value="X-ray"/>
    <property type="resolution" value="2.89 A"/>
    <property type="chains" value="A/B=319-591"/>
</dbReference>
<dbReference type="PDB" id="7WQV">
    <property type="method" value="X-ray"/>
    <property type="resolution" value="2.80 A"/>
    <property type="chains" value="A/C/E/G/I/K/M/O=330-531"/>
</dbReference>
<dbReference type="PDB" id="7WR8">
    <property type="method" value="EM"/>
    <property type="resolution" value="3.50 A"/>
    <property type="chains" value="R=334-526"/>
</dbReference>
<dbReference type="PDB" id="7WRJ">
    <property type="method" value="EM"/>
    <property type="resolution" value="4.08 A"/>
    <property type="chains" value="R=334-526"/>
</dbReference>
<dbReference type="PDB" id="7WRL">
    <property type="method" value="EM"/>
    <property type="resolution" value="3.51 A"/>
    <property type="chains" value="R=334-526"/>
</dbReference>
<dbReference type="PDB" id="7WRO">
    <property type="method" value="EM"/>
    <property type="resolution" value="3.40 A"/>
    <property type="chains" value="R=334-516"/>
</dbReference>
<dbReference type="PDB" id="7WRY">
    <property type="method" value="EM"/>
    <property type="resolution" value="3.28 A"/>
    <property type="chains" value="R=334-526"/>
</dbReference>
<dbReference type="PDB" id="7WRZ">
    <property type="method" value="EM"/>
    <property type="resolution" value="3.26 A"/>
    <property type="chains" value="R=335-526"/>
</dbReference>
<dbReference type="PDB" id="7WS0">
    <property type="method" value="EM"/>
    <property type="resolution" value="3.20 A"/>
    <property type="chains" value="A/B/C=1-1208"/>
</dbReference>
<dbReference type="PDB" id="7WS1">
    <property type="method" value="EM"/>
    <property type="resolution" value="3.40 A"/>
    <property type="chains" value="A/B/C=1-1208"/>
</dbReference>
<dbReference type="PDB" id="7WS2">
    <property type="method" value="EM"/>
    <property type="resolution" value="3.30 A"/>
    <property type="chains" value="A=331-530"/>
</dbReference>
<dbReference type="PDB" id="7WS3">
    <property type="method" value="EM"/>
    <property type="resolution" value="3.60 A"/>
    <property type="chains" value="A/B/C=1-1208"/>
</dbReference>
<dbReference type="PDB" id="7WS6">
    <property type="method" value="EM"/>
    <property type="resolution" value="3.80 A"/>
    <property type="chains" value="C=319-536"/>
</dbReference>
<dbReference type="PDB" id="7WS7">
    <property type="method" value="EM"/>
    <property type="resolution" value="3.40 A"/>
    <property type="chains" value="B=326-530"/>
</dbReference>
<dbReference type="PDB" id="7WSA">
    <property type="method" value="EM"/>
    <property type="resolution" value="3.00 A"/>
    <property type="chains" value="A=330-530"/>
</dbReference>
<dbReference type="PDB" id="7WSC">
    <property type="method" value="EM"/>
    <property type="resolution" value="3.78 A"/>
    <property type="chains" value="R=319-541"/>
</dbReference>
<dbReference type="PDB" id="7WSE">
    <property type="method" value="EM"/>
    <property type="resolution" value="2.93 A"/>
    <property type="chains" value="B=333-527"/>
</dbReference>
<dbReference type="PDB" id="7WSH">
    <property type="method" value="EM"/>
    <property type="resolution" value="2.89 A"/>
    <property type="chains" value="B=333-527"/>
</dbReference>
<dbReference type="PDB" id="7WSK">
    <property type="method" value="X-ray"/>
    <property type="resolution" value="3.30 A"/>
    <property type="chains" value="B=319-541"/>
</dbReference>
<dbReference type="PDB" id="7WT9">
    <property type="method" value="EM"/>
    <property type="resolution" value="4.30 A"/>
    <property type="chains" value="E=1-1273"/>
</dbReference>
<dbReference type="PDB" id="7WTG">
    <property type="method" value="EM"/>
    <property type="resolution" value="3.80 A"/>
    <property type="chains" value="E=330-530"/>
</dbReference>
<dbReference type="PDB" id="7WTH">
    <property type="method" value="EM"/>
    <property type="resolution" value="4.30 A"/>
    <property type="chains" value="E=330-530"/>
</dbReference>
<dbReference type="PDB" id="7WTJ">
    <property type="method" value="EM"/>
    <property type="resolution" value="4.20 A"/>
    <property type="chains" value="E=330-530"/>
</dbReference>
<dbReference type="PDB" id="7WUE">
    <property type="method" value="X-ray"/>
    <property type="resolution" value="3.20 A"/>
    <property type="chains" value="A/B=333-527"/>
</dbReference>
<dbReference type="PDB" id="7WUH">
    <property type="method" value="EM"/>
    <property type="resolution" value="4.70 A"/>
    <property type="chains" value="A/C/E=14-1208"/>
</dbReference>
<dbReference type="PDB" id="7WVL">
    <property type="method" value="X-ray"/>
    <property type="resolution" value="3.00 A"/>
    <property type="chains" value="F=332-532"/>
</dbReference>
<dbReference type="PDB" id="7WVN">
    <property type="method" value="EM"/>
    <property type="resolution" value="3.40 A"/>
    <property type="chains" value="A/B/C=1-1205"/>
</dbReference>
<dbReference type="PDB" id="7WVO">
    <property type="method" value="EM"/>
    <property type="resolution" value="3.41 A"/>
    <property type="chains" value="A/B/C=1-1205"/>
</dbReference>
<dbReference type="PDB" id="7WVP">
    <property type="method" value="EM"/>
    <property type="resolution" value="3.70 A"/>
    <property type="chains" value="B/C/D=1-1208"/>
</dbReference>
<dbReference type="PDB" id="7WVQ">
    <property type="method" value="EM"/>
    <property type="resolution" value="4.04 A"/>
    <property type="chains" value="B/C/D=1-1208"/>
</dbReference>
<dbReference type="PDB" id="7WWK">
    <property type="method" value="EM"/>
    <property type="resolution" value="3.40 A"/>
    <property type="chains" value="B/C=334-527"/>
</dbReference>
<dbReference type="PDB" id="7WWL">
    <property type="method" value="EM"/>
    <property type="resolution" value="3.00 A"/>
    <property type="chains" value="A/B/C=1-1273"/>
</dbReference>
<dbReference type="PDB" id="7WWM">
    <property type="method" value="EM"/>
    <property type="resolution" value="2.80 A"/>
    <property type="chains" value="A/B/C=1-1273"/>
</dbReference>
<dbReference type="PDB" id="7WZ1">
    <property type="method" value="EM"/>
    <property type="resolution" value="3.40 A"/>
    <property type="chains" value="A/B/C=1-1208"/>
</dbReference>
<dbReference type="PDB" id="7WZ2">
    <property type="method" value="EM"/>
    <property type="resolution" value="2.70 A"/>
    <property type="chains" value="A/C/E=1-1208"/>
</dbReference>
<dbReference type="PDB" id="7X08">
    <property type="method" value="EM"/>
    <property type="resolution" value="2.70 A"/>
    <property type="chains" value="A/B/C=1-1273"/>
</dbReference>
<dbReference type="PDB" id="7X1M">
    <property type="method" value="EM"/>
    <property type="resolution" value="2.74 A"/>
    <property type="chains" value="M=333-541"/>
</dbReference>
<dbReference type="PDB" id="7X2H">
    <property type="method" value="X-ray"/>
    <property type="resolution" value="2.10 A"/>
    <property type="chains" value="E/F=334-528"/>
</dbReference>
<dbReference type="PDB" id="7X2K">
    <property type="method" value="X-ray"/>
    <property type="resolution" value="2.40 A"/>
    <property type="chains" value="E=333-526"/>
</dbReference>
<dbReference type="PDB" id="7X2L">
    <property type="method" value="X-ray"/>
    <property type="resolution" value="2.40 A"/>
    <property type="chains" value="E=333-528"/>
</dbReference>
<dbReference type="PDB" id="7X2M">
    <property type="method" value="X-ray"/>
    <property type="resolution" value="1.80 A"/>
    <property type="chains" value="E=333-529"/>
</dbReference>
<dbReference type="PDB" id="7X63">
    <property type="method" value="X-ray"/>
    <property type="resolution" value="2.24 A"/>
    <property type="chains" value="R=319-537"/>
</dbReference>
<dbReference type="PDB" id="7X66">
    <property type="method" value="X-ray"/>
    <property type="resolution" value="2.40 A"/>
    <property type="chains" value="R=319-528"/>
</dbReference>
<dbReference type="PDB" id="7X6A">
    <property type="method" value="EM"/>
    <property type="resolution" value="3.50 A"/>
    <property type="chains" value="A/B/D=1-1273"/>
</dbReference>
<dbReference type="PDB" id="7X7D">
    <property type="method" value="X-ray"/>
    <property type="resolution" value="2.92 A"/>
    <property type="chains" value="A/D/E=334-527"/>
</dbReference>
<dbReference type="PDB" id="7X7E">
    <property type="method" value="X-ray"/>
    <property type="resolution" value="2.67 A"/>
    <property type="chains" value="C/D/F=334-527"/>
</dbReference>
<dbReference type="PDB" id="7X7N">
    <property type="method" value="EM"/>
    <property type="resolution" value="4.47 A"/>
    <property type="chains" value="A/B/C=1-1208"/>
</dbReference>
<dbReference type="PDB" id="7X7O">
    <property type="method" value="X-ray"/>
    <property type="resolution" value="3.75 A"/>
    <property type="chains" value="A/B/C/D=322-536"/>
</dbReference>
<dbReference type="PDB" id="7X7T">
    <property type="method" value="EM"/>
    <property type="resolution" value="3.48 A"/>
    <property type="chains" value="G=324-527"/>
</dbReference>
<dbReference type="PDB" id="7X7U">
    <property type="method" value="EM"/>
    <property type="resolution" value="3.77 A"/>
    <property type="chains" value="G=324-527"/>
</dbReference>
<dbReference type="PDB" id="7X8W">
    <property type="method" value="EM"/>
    <property type="resolution" value="3.10 A"/>
    <property type="chains" value="A=1-1208"/>
</dbReference>
<dbReference type="PDB" id="7X8Y">
    <property type="method" value="EM"/>
    <property type="resolution" value="4.10 A"/>
    <property type="chains" value="A=1-1208"/>
</dbReference>
<dbReference type="PDB" id="7X8Z">
    <property type="method" value="EM"/>
    <property type="resolution" value="4.10 A"/>
    <property type="chains" value="A=1-1208"/>
</dbReference>
<dbReference type="PDB" id="7X90">
    <property type="method" value="EM"/>
    <property type="resolution" value="4.20 A"/>
    <property type="chains" value="G=1-1208"/>
</dbReference>
<dbReference type="PDB" id="7X91">
    <property type="method" value="EM"/>
    <property type="resolution" value="4.30 A"/>
    <property type="chains" value="A=1-1208"/>
</dbReference>
<dbReference type="PDB" id="7X92">
    <property type="method" value="EM"/>
    <property type="resolution" value="4.10 A"/>
    <property type="chains" value="A=1-1208"/>
</dbReference>
<dbReference type="PDB" id="7X93">
    <property type="method" value="EM"/>
    <property type="resolution" value="3.30 A"/>
    <property type="chains" value="A/D/G=1-1208"/>
</dbReference>
<dbReference type="PDB" id="7X94">
    <property type="method" value="EM"/>
    <property type="resolution" value="4.00 A"/>
    <property type="chains" value="A=1-1208"/>
</dbReference>
<dbReference type="PDB" id="7X95">
    <property type="method" value="EM"/>
    <property type="resolution" value="3.90 A"/>
    <property type="chains" value="A=1-1208"/>
</dbReference>
<dbReference type="PDB" id="7X96">
    <property type="method" value="EM"/>
    <property type="resolution" value="3.40 A"/>
    <property type="chains" value="G=1-1208"/>
</dbReference>
<dbReference type="PDB" id="7X9E">
    <property type="method" value="X-ray"/>
    <property type="resolution" value="2.60 A"/>
    <property type="chains" value="E/F=809-833"/>
</dbReference>
<dbReference type="PDB" id="7XA7">
    <property type="method" value="X-ray"/>
    <property type="resolution" value="3.31 A"/>
    <property type="chains" value="B/D/F/H=319-541"/>
</dbReference>
<dbReference type="PDB" id="7XAZ">
    <property type="method" value="X-ray"/>
    <property type="resolution" value="3.00 A"/>
    <property type="chains" value="B/D=333-527"/>
</dbReference>
<dbReference type="PDB" id="7XB0">
    <property type="method" value="X-ray"/>
    <property type="resolution" value="2.90 A"/>
    <property type="chains" value="B=333-527"/>
</dbReference>
<dbReference type="PDB" id="7XB1">
    <property type="method" value="X-ray"/>
    <property type="resolution" value="2.70 A"/>
    <property type="chains" value="B=333-527"/>
</dbReference>
<dbReference type="PDB" id="7XBY">
    <property type="method" value="X-ray"/>
    <property type="resolution" value="2.85 A"/>
    <property type="chains" value="B=319-541"/>
</dbReference>
<dbReference type="PDB" id="7XCI">
    <property type="method" value="EM"/>
    <property type="resolution" value="3.20 A"/>
    <property type="chains" value="B=333-527"/>
</dbReference>
<dbReference type="PDB" id="7XCK">
    <property type="method" value="EM"/>
    <property type="resolution" value="2.50 A"/>
    <property type="chains" value="M=322-590"/>
</dbReference>
<dbReference type="PDB" id="7XCP">
    <property type="method" value="EM"/>
    <property type="resolution" value="3.05 A"/>
    <property type="chains" value="B=333-527"/>
</dbReference>
<dbReference type="PDB" id="7XCZ">
    <property type="method" value="EM"/>
    <property type="resolution" value="3.20 A"/>
    <property type="chains" value="A=333-528"/>
</dbReference>
<dbReference type="PDB" id="7XD2">
    <property type="method" value="EM"/>
    <property type="resolution" value="3.30 A"/>
    <property type="chains" value="A/B/C=1-1208"/>
</dbReference>
<dbReference type="PDB" id="7XDA">
    <property type="method" value="EM"/>
    <property type="resolution" value="2.98 A"/>
    <property type="chains" value="A=334-528"/>
</dbReference>
<dbReference type="PDB" id="7XDK">
    <property type="method" value="EM"/>
    <property type="resolution" value="3.20 A"/>
    <property type="chains" value="A/B/C=26-1143"/>
</dbReference>
<dbReference type="PDB" id="7XDL">
    <property type="method" value="EM"/>
    <property type="resolution" value="3.08 A"/>
    <property type="chains" value="A/B/C=26-1143"/>
</dbReference>
<dbReference type="PDB" id="7XEG">
    <property type="method" value="X-ray"/>
    <property type="resolution" value="2.69 A"/>
    <property type="chains" value="A/B=319-537"/>
</dbReference>
<dbReference type="PDB" id="7XEI">
    <property type="method" value="X-ray"/>
    <property type="resolution" value="2.76 A"/>
    <property type="chains" value="A/B=319-537"/>
</dbReference>
<dbReference type="PDB" id="7XIK">
    <property type="method" value="X-ray"/>
    <property type="resolution" value="2.89 A"/>
    <property type="chains" value="A=319-537"/>
</dbReference>
<dbReference type="PDB" id="7XIL">
    <property type="method" value="X-ray"/>
    <property type="resolution" value="2.91 A"/>
    <property type="chains" value="A=319-537"/>
</dbReference>
<dbReference type="PDB" id="7XIW">
    <property type="method" value="EM"/>
    <property type="resolution" value="3.62 A"/>
    <property type="chains" value="A/B/D=1-1273"/>
</dbReference>
<dbReference type="PDB" id="7XIX">
    <property type="method" value="EM"/>
    <property type="resolution" value="3.25 A"/>
    <property type="chains" value="A/B/C=1-1273"/>
</dbReference>
<dbReference type="PDB" id="7XIY">
    <property type="method" value="EM"/>
    <property type="resolution" value="3.07 A"/>
    <property type="chains" value="A/B/C=1-1273"/>
</dbReference>
<dbReference type="PDB" id="7XIZ">
    <property type="method" value="EM"/>
    <property type="resolution" value="3.74 A"/>
    <property type="chains" value="B=323-589"/>
</dbReference>
<dbReference type="PDB" id="7XJ9">
    <property type="method" value="EM"/>
    <property type="resolution" value="3.27 A"/>
    <property type="chains" value="B/C=334-527"/>
</dbReference>
<dbReference type="PDB" id="7XMX">
    <property type="method" value="EM"/>
    <property type="resolution" value="3.62 A"/>
    <property type="chains" value="A/B/C=1-1208"/>
</dbReference>
<dbReference type="PDB" id="7XMZ">
    <property type="method" value="EM"/>
    <property type="resolution" value="3.25 A"/>
    <property type="chains" value="A/B/C=1-1208"/>
</dbReference>
<dbReference type="PDB" id="7XNQ">
    <property type="method" value="EM"/>
    <property type="resolution" value="3.52 A"/>
    <property type="chains" value="A/B/C=1-1273"/>
</dbReference>
<dbReference type="PDB" id="7XNR">
    <property type="method" value="EM"/>
    <property type="resolution" value="3.49 A"/>
    <property type="chains" value="A/B/C=1-1273"/>
</dbReference>
<dbReference type="PDB" id="7XNS">
    <property type="method" value="EM"/>
    <property type="resolution" value="3.48 A"/>
    <property type="chains" value="A/B/C=1-1273"/>
</dbReference>
<dbReference type="PDB" id="7XO7">
    <property type="method" value="EM"/>
    <property type="resolution" value="3.38 A"/>
    <property type="chains" value="A/B/C=1-1273"/>
</dbReference>
<dbReference type="PDB" id="7XO8">
    <property type="method" value="EM"/>
    <property type="resolution" value="3.48 A"/>
    <property type="chains" value="A/B/C=1-1273"/>
</dbReference>
<dbReference type="PDB" id="7XO9">
    <property type="method" value="EM"/>
    <property type="resolution" value="3.00 A"/>
    <property type="chains" value="A=1-1273"/>
</dbReference>
<dbReference type="PDB" id="7XOA">
    <property type="method" value="EM"/>
    <property type="resolution" value="3.20 A"/>
    <property type="chains" value="A/B/C=1-1273"/>
</dbReference>
<dbReference type="PDB" id="7XOB">
    <property type="method" value="EM"/>
    <property type="resolution" value="3.30 A"/>
    <property type="chains" value="A/B/C=1-1273"/>
</dbReference>
<dbReference type="PDB" id="7XOC">
    <property type="method" value="EM"/>
    <property type="resolution" value="3.00 A"/>
    <property type="chains" value="A=1-1273"/>
</dbReference>
<dbReference type="PDB" id="7XOD">
    <property type="method" value="EM"/>
    <property type="resolution" value="3.27 A"/>
    <property type="chains" value="A/B/C=1-1273"/>
</dbReference>
<dbReference type="PDB" id="7XOE">
    <property type="method" value="EM"/>
    <property type="resolution" value="3.90 A"/>
    <property type="chains" value="A/B/C=1-1255"/>
</dbReference>
<dbReference type="PDB" id="7XOG">
    <property type="method" value="EM"/>
    <property type="resolution" value="3.50 A"/>
    <property type="chains" value="A/B/C=1-1255"/>
</dbReference>
<dbReference type="PDB" id="7XQS">
    <property type="method" value="X-ray"/>
    <property type="resolution" value="2.69 A"/>
    <property type="chains" value="C=815-823"/>
</dbReference>
<dbReference type="PDB" id="7XRP">
    <property type="method" value="EM"/>
    <property type="resolution" value="3.88 A"/>
    <property type="chains" value="A=27-309, F=330-521"/>
</dbReference>
<dbReference type="PDB" id="7XS8">
    <property type="method" value="X-ray"/>
    <property type="resolution" value="2.80 A"/>
    <property type="chains" value="E=334-527"/>
</dbReference>
<dbReference type="PDB" id="7XSA">
    <property type="method" value="X-ray"/>
    <property type="resolution" value="2.20 A"/>
    <property type="chains" value="E/J=333-527"/>
</dbReference>
<dbReference type="PDB" id="7XSB">
    <property type="method" value="X-ray"/>
    <property type="resolution" value="3.20 A"/>
    <property type="chains" value="A/B/C/E=333-528"/>
</dbReference>
<dbReference type="PDB" id="7XSC">
    <property type="method" value="X-ray"/>
    <property type="resolution" value="2.88 A"/>
    <property type="chains" value="E/F=319-529"/>
</dbReference>
<dbReference type="PDB" id="7XST">
    <property type="method" value="EM"/>
    <property type="resolution" value="3.04 A"/>
    <property type="chains" value="A/B/C=1-1213"/>
</dbReference>
<dbReference type="PDB" id="7XTZ">
    <property type="method" value="EM"/>
    <property type="resolution" value="2.80 A"/>
    <property type="chains" value="A/B/C=14-1141"/>
</dbReference>
<dbReference type="PDB" id="7XU0">
    <property type="method" value="EM"/>
    <property type="resolution" value="2.90 A"/>
    <property type="chains" value="A/B/C=14-1141"/>
</dbReference>
<dbReference type="PDB" id="7XU1">
    <property type="method" value="EM"/>
    <property type="resolution" value="3.00 A"/>
    <property type="chains" value="A/B/C=14-1211"/>
</dbReference>
<dbReference type="PDB" id="7XU2">
    <property type="method" value="EM"/>
    <property type="resolution" value="3.20 A"/>
    <property type="chains" value="A/B/C=14-1140"/>
</dbReference>
<dbReference type="PDB" id="7XU3">
    <property type="method" value="EM"/>
    <property type="resolution" value="3.00 A"/>
    <property type="chains" value="A/B/C=14-1140"/>
</dbReference>
<dbReference type="PDB" id="7XU4">
    <property type="method" value="EM"/>
    <property type="resolution" value="3.20 A"/>
    <property type="chains" value="A/B/C=14-1140"/>
</dbReference>
<dbReference type="PDB" id="7XU5">
    <property type="method" value="EM"/>
    <property type="resolution" value="3.10 A"/>
    <property type="chains" value="A/B/C=14-1140"/>
</dbReference>
<dbReference type="PDB" id="7XU6">
    <property type="method" value="EM"/>
    <property type="resolution" value="2.90 A"/>
    <property type="chains" value="A/B/C=14-1140"/>
</dbReference>
<dbReference type="PDB" id="7XWA">
    <property type="method" value="X-ray"/>
    <property type="resolution" value="3.36 A"/>
    <property type="chains" value="B/D=322-536"/>
</dbReference>
<dbReference type="PDB" id="7XXL">
    <property type="method" value="EM"/>
    <property type="resolution" value="7.30 A"/>
    <property type="chains" value="B=331-532"/>
</dbReference>
<dbReference type="PDB" id="7XY3">
    <property type="method" value="EM"/>
    <property type="resolution" value="4.60 A"/>
    <property type="chains" value="A/B/C=14-1145"/>
</dbReference>
<dbReference type="PDB" id="7XY4">
    <property type="method" value="EM"/>
    <property type="resolution" value="3.30 A"/>
    <property type="chains" value="A/B/C=14-1145"/>
</dbReference>
<dbReference type="PDB" id="7Y0C">
    <property type="method" value="X-ray"/>
    <property type="resolution" value="2.94 A"/>
    <property type="chains" value="E/R=330-528"/>
</dbReference>
<dbReference type="PDB" id="7Y0N">
    <property type="method" value="EM"/>
    <property type="resolution" value="3.80 A"/>
    <property type="chains" value="A/B/D=1-1147"/>
</dbReference>
<dbReference type="PDB" id="7Y0O">
    <property type="method" value="EM"/>
    <property type="resolution" value="4.40 A"/>
    <property type="chains" value="A=334-527"/>
</dbReference>
<dbReference type="PDB" id="7Y0V">
    <property type="method" value="X-ray"/>
    <property type="resolution" value="2.48 A"/>
    <property type="chains" value="R=325-541"/>
</dbReference>
<dbReference type="PDB" id="7Y0W">
    <property type="method" value="EM"/>
    <property type="resolution" value="3.42 A"/>
    <property type="chains" value="R=335-526"/>
</dbReference>
<dbReference type="PDB" id="7Y1Y">
    <property type="method" value="EM"/>
    <property type="resolution" value="3.30 A"/>
    <property type="chains" value="A/B/C=1-1208"/>
</dbReference>
<dbReference type="PDB" id="7Y1Z">
    <property type="method" value="EM"/>
    <property type="resolution" value="3.40 A"/>
    <property type="chains" value="A/B/C=1-1208"/>
</dbReference>
<dbReference type="PDB" id="7Y20">
    <property type="method" value="EM"/>
    <property type="resolution" value="3.80 A"/>
    <property type="chains" value="A/B/C=1-1208"/>
</dbReference>
<dbReference type="PDB" id="7Y21">
    <property type="method" value="EM"/>
    <property type="resolution" value="2.80 A"/>
    <property type="chains" value="A/B/C=1-1208"/>
</dbReference>
<dbReference type="PDB" id="7Y3O">
    <property type="method" value="X-ray"/>
    <property type="resolution" value="2.10 A"/>
    <property type="chains" value="A=334-527"/>
</dbReference>
<dbReference type="PDB" id="7Y42">
    <property type="method" value="EM"/>
    <property type="resolution" value="3.45 A"/>
    <property type="chains" value="A/B/D=27-1147"/>
</dbReference>
<dbReference type="PDB" id="7Y6D">
    <property type="method" value="EM"/>
    <property type="resolution" value="4.39 A"/>
    <property type="chains" value="A/B/C=1-1273"/>
</dbReference>
<dbReference type="PDB" id="7Y6K">
    <property type="method" value="EM"/>
    <property type="resolution" value="3.34 A"/>
    <property type="chains" value="B=1-1208"/>
</dbReference>
<dbReference type="PDB" id="7Y6L">
    <property type="method" value="EM"/>
    <property type="resolution" value="3.50 A"/>
    <property type="chains" value="A=1-1208"/>
</dbReference>
<dbReference type="PDB" id="7Y6N">
    <property type="method" value="EM"/>
    <property type="resolution" value="4.40 A"/>
    <property type="chains" value="A=1-1208"/>
</dbReference>
<dbReference type="PDB" id="7Y71">
    <property type="method" value="EM"/>
    <property type="resolution" value="3.12 A"/>
    <property type="chains" value="A/B/C=16-1213"/>
</dbReference>
<dbReference type="PDB" id="7Y72">
    <property type="method" value="EM"/>
    <property type="resolution" value="4.03 A"/>
    <property type="chains" value="A/C=16-1213"/>
</dbReference>
<dbReference type="PDB" id="7Y75">
    <property type="method" value="EM"/>
    <property type="resolution" value="3.10 A"/>
    <property type="chains" value="E/F=319-541"/>
</dbReference>
<dbReference type="PDB" id="7Y76">
    <property type="method" value="EM"/>
    <property type="resolution" value="3.20 A"/>
    <property type="chains" value="E/F=319-541"/>
</dbReference>
<dbReference type="PDB" id="7Y7J">
    <property type="method" value="EM"/>
    <property type="resolution" value="4.80 A"/>
    <property type="chains" value="A/B/C=1-1208"/>
</dbReference>
<dbReference type="PDB" id="7Y7K">
    <property type="method" value="EM"/>
    <property type="resolution" value="4.40 A"/>
    <property type="chains" value="A=336-514"/>
</dbReference>
<dbReference type="PDB" id="7Y8J">
    <property type="method" value="X-ray"/>
    <property type="resolution" value="1.03 A"/>
    <property type="chains" value="A=950-955"/>
</dbReference>
<dbReference type="PDB" id="7YA1">
    <property type="method" value="EM"/>
    <property type="resolution" value="3.11 A"/>
    <property type="chains" value="B=333-527"/>
</dbReference>
<dbReference type="PDB" id="7YAD">
    <property type="method" value="EM"/>
    <property type="resolution" value="2.66 A"/>
    <property type="chains" value="E/M=330-529"/>
</dbReference>
<dbReference type="PDB" id="7YBH">
    <property type="method" value="EM"/>
    <property type="resolution" value="3.50 A"/>
    <property type="chains" value="A/B/C=1-1273"/>
</dbReference>
<dbReference type="PDB" id="7YBI">
    <property type="method" value="EM"/>
    <property type="resolution" value="4.10 A"/>
    <property type="chains" value="A/B/C=1-1273"/>
</dbReference>
<dbReference type="PDB" id="7YBJ">
    <property type="method" value="EM"/>
    <property type="resolution" value="3.73 A"/>
    <property type="chains" value="A/B/C=1-1273"/>
</dbReference>
<dbReference type="PDB" id="7YBK">
    <property type="method" value="EM"/>
    <property type="resolution" value="3.90 A"/>
    <property type="chains" value="A/B/C=1-1273"/>
</dbReference>
<dbReference type="PDB" id="7YBL">
    <property type="method" value="EM"/>
    <property type="resolution" value="3.60 A"/>
    <property type="chains" value="A/B/C=1-1273"/>
</dbReference>
<dbReference type="PDB" id="7YBM">
    <property type="method" value="EM"/>
    <property type="resolution" value="3.45 A"/>
    <property type="chains" value="A/B/C=1-1273"/>
</dbReference>
<dbReference type="PDB" id="7YBN">
    <property type="method" value="EM"/>
    <property type="resolution" value="3.82 A"/>
    <property type="chains" value="A/B/C=1-1273"/>
</dbReference>
<dbReference type="PDB" id="7YC5">
    <property type="method" value="EM"/>
    <property type="resolution" value="3.10 A"/>
    <property type="chains" value="A/B/C=1-1208"/>
</dbReference>
<dbReference type="PDB" id="7YCK">
    <property type="method" value="X-ray"/>
    <property type="resolution" value="2.60 A"/>
    <property type="chains" value="A/B=333-530"/>
</dbReference>
<dbReference type="PDB" id="7YCL">
    <property type="method" value="X-ray"/>
    <property type="resolution" value="2.13 A"/>
    <property type="chains" value="D/R=333-530"/>
</dbReference>
<dbReference type="PDB" id="7YCN">
    <property type="method" value="X-ray"/>
    <property type="resolution" value="2.85 A"/>
    <property type="chains" value="A/B/G/J=333-527"/>
</dbReference>
<dbReference type="PDB" id="7YCO">
    <property type="method" value="X-ray"/>
    <property type="resolution" value="1.96 A"/>
    <property type="chains" value="A=333-530"/>
</dbReference>
<dbReference type="PDB" id="7YD1">
    <property type="method" value="EM"/>
    <property type="resolution" value="2.99 A"/>
    <property type="chains" value="C=331-528"/>
</dbReference>
<dbReference type="PDB" id="7YDI">
    <property type="method" value="EM"/>
    <property type="resolution" value="3.98 A"/>
    <property type="chains" value="E=334-526"/>
</dbReference>
<dbReference type="PDB" id="7YDY">
    <property type="method" value="EM"/>
    <property type="resolution" value="4.75 A"/>
    <property type="chains" value="A/B/C=1-1208"/>
</dbReference>
<dbReference type="PDB" id="7YE5">
    <property type="method" value="EM"/>
    <property type="resolution" value="6.75 A"/>
    <property type="chains" value="A/B/C=1-1208"/>
</dbReference>
<dbReference type="PDB" id="7YE9">
    <property type="method" value="EM"/>
    <property type="resolution" value="4.17 A"/>
    <property type="chains" value="A/B/C=1-1208"/>
</dbReference>
<dbReference type="PDB" id="7YEG">
    <property type="method" value="EM"/>
    <property type="resolution" value="3.73 A"/>
    <property type="chains" value="A/B/C=1-1208"/>
</dbReference>
<dbReference type="PDB" id="7YH6">
    <property type="method" value="EM"/>
    <property type="resolution" value="3.40 A"/>
    <property type="chains" value="A=333-526"/>
</dbReference>
<dbReference type="PDB" id="7YH7">
    <property type="method" value="EM"/>
    <property type="resolution" value="3.30 A"/>
    <property type="chains" value="A/B/C=12-1210"/>
</dbReference>
<dbReference type="PDB" id="7YHW">
    <property type="method" value="EM"/>
    <property type="resolution" value="3.09 A"/>
    <property type="chains" value="B=333-527"/>
</dbReference>
<dbReference type="PDB" id="7YJ3">
    <property type="method" value="EM"/>
    <property type="resolution" value="3.14 A"/>
    <property type="chains" value="B=333-527"/>
</dbReference>
<dbReference type="PDB" id="7YOW">
    <property type="method" value="X-ray"/>
    <property type="resolution" value="3.30 A"/>
    <property type="chains" value="C/R=321-536"/>
</dbReference>
<dbReference type="PDB" id="7YQT">
    <property type="method" value="EM"/>
    <property type="resolution" value="3.45 A"/>
    <property type="chains" value="A/B/C=1-1273"/>
</dbReference>
<dbReference type="PDB" id="7YQU">
    <property type="method" value="EM"/>
    <property type="resolution" value="3.19 A"/>
    <property type="chains" value="A/B/C=1-1273"/>
</dbReference>
<dbReference type="PDB" id="7YQV">
    <property type="method" value="EM"/>
    <property type="resolution" value="3.58 A"/>
    <property type="chains" value="A/B/C=1-1273"/>
</dbReference>
<dbReference type="PDB" id="7YQW">
    <property type="method" value="EM"/>
    <property type="resolution" value="3.51 A"/>
    <property type="chains" value="A/B/C=1-1273"/>
</dbReference>
<dbReference type="PDB" id="7YQX">
    <property type="method" value="EM"/>
    <property type="resolution" value="3.72 A"/>
    <property type="chains" value="A/B/C=1-1273"/>
</dbReference>
<dbReference type="PDB" id="7YQY">
    <property type="method" value="EM"/>
    <property type="resolution" value="3.74 A"/>
    <property type="chains" value="A/B/C=1-1273"/>
</dbReference>
<dbReference type="PDB" id="7YQZ">
    <property type="method" value="EM"/>
    <property type="resolution" value="3.84 A"/>
    <property type="chains" value="A/B/C=1-1273"/>
</dbReference>
<dbReference type="PDB" id="7YR0">
    <property type="method" value="EM"/>
    <property type="resolution" value="3.98 A"/>
    <property type="chains" value="A=332-527"/>
</dbReference>
<dbReference type="PDB" id="7YR1">
    <property type="method" value="EM"/>
    <property type="resolution" value="3.62 A"/>
    <property type="chains" value="A/B/C=1-1273"/>
</dbReference>
<dbReference type="PDB" id="7YR2">
    <property type="method" value="EM"/>
    <property type="resolution" value="3.30 A"/>
    <property type="chains" value="C/D/E=1-1273"/>
</dbReference>
<dbReference type="PDB" id="7YR3">
    <property type="method" value="EM"/>
    <property type="resolution" value="3.52 A"/>
    <property type="chains" value="B/C/F=1-1273"/>
</dbReference>
<dbReference type="PDB" id="7YR4">
    <property type="method" value="EM"/>
    <property type="resolution" value="4.12 A"/>
    <property type="chains" value="D=334-528"/>
</dbReference>
<dbReference type="PDB" id="7YTN">
    <property type="method" value="X-ray"/>
    <property type="resolution" value="3.51 A"/>
    <property type="chains" value="C=319-541"/>
</dbReference>
<dbReference type="PDB" id="7YUE">
    <property type="method" value="X-ray"/>
    <property type="resolution" value="2.35 A"/>
    <property type="chains" value="C=813-826"/>
</dbReference>
<dbReference type="PDB" id="7YV8">
    <property type="method" value="EM"/>
    <property type="resolution" value="2.94 A"/>
    <property type="chains" value="B=332-528"/>
</dbReference>
<dbReference type="PDB" id="7YVE">
    <property type="method" value="EM"/>
    <property type="resolution" value="3.40 A"/>
    <property type="chains" value="A/B/C=1-1208"/>
</dbReference>
<dbReference type="PDB" id="7YVF">
    <property type="method" value="EM"/>
    <property type="resolution" value="3.40 A"/>
    <property type="chains" value="B=1-1208"/>
</dbReference>
<dbReference type="PDB" id="7YVG">
    <property type="method" value="EM"/>
    <property type="resolution" value="3.40 A"/>
    <property type="chains" value="A/B/C=1-1208"/>
</dbReference>
<dbReference type="PDB" id="7YVH">
    <property type="method" value="EM"/>
    <property type="resolution" value="3.60 A"/>
    <property type="chains" value="B=1-1208"/>
</dbReference>
<dbReference type="PDB" id="7YVI">
    <property type="method" value="EM"/>
    <property type="resolution" value="3.70 A"/>
    <property type="chains" value="A/B/C=1-1208"/>
</dbReference>
<dbReference type="PDB" id="7YVJ">
    <property type="method" value="EM"/>
    <property type="resolution" value="3.60 A"/>
    <property type="chains" value="B=1-1208"/>
</dbReference>
<dbReference type="PDB" id="7YVK">
    <property type="method" value="EM"/>
    <property type="resolution" value="3.20 A"/>
    <property type="chains" value="A/B/C=1-1208"/>
</dbReference>
<dbReference type="PDB" id="7YVL">
    <property type="method" value="EM"/>
    <property type="resolution" value="3.30 A"/>
    <property type="chains" value="B=1-1208"/>
</dbReference>
<dbReference type="PDB" id="7YVM">
    <property type="method" value="EM"/>
    <property type="resolution" value="3.50 A"/>
    <property type="chains" value="B=1-1208"/>
</dbReference>
<dbReference type="PDB" id="7YVN">
    <property type="method" value="EM"/>
    <property type="resolution" value="3.40 A"/>
    <property type="chains" value="A/B/C=1-1208"/>
</dbReference>
<dbReference type="PDB" id="7YVO">
    <property type="method" value="EM"/>
    <property type="resolution" value="3.30 A"/>
    <property type="chains" value="A/B/C=1-1208"/>
</dbReference>
<dbReference type="PDB" id="7YVP">
    <property type="method" value="EM"/>
    <property type="resolution" value="3.80 A"/>
    <property type="chains" value="A/B/C=1-1208"/>
</dbReference>
<dbReference type="PDB" id="7YVU">
    <property type="method" value="EM"/>
    <property type="resolution" value="3.20 A"/>
    <property type="chains" value="B=333-527"/>
</dbReference>
<dbReference type="PDB" id="7Z0X">
    <property type="method" value="X-ray"/>
    <property type="resolution" value="1.80 A"/>
    <property type="chains" value="R=331-527"/>
</dbReference>
<dbReference type="PDB" id="7Z0Y">
    <property type="method" value="X-ray"/>
    <property type="resolution" value="2.95 A"/>
    <property type="chains" value="R=331-527"/>
</dbReference>
<dbReference type="PDB" id="7Z1A">
    <property type="method" value="X-ray"/>
    <property type="resolution" value="2.59 A"/>
    <property type="chains" value="A/C=330-532"/>
</dbReference>
<dbReference type="PDB" id="7Z1B">
    <property type="method" value="X-ray"/>
    <property type="resolution" value="2.30 A"/>
    <property type="chains" value="A/C=330-532"/>
</dbReference>
<dbReference type="PDB" id="7Z1C">
    <property type="method" value="X-ray"/>
    <property type="resolution" value="1.90 A"/>
    <property type="chains" value="A/C=330-532"/>
</dbReference>
<dbReference type="PDB" id="7Z1D">
    <property type="method" value="X-ray"/>
    <property type="resolution" value="1.55 A"/>
    <property type="chains" value="EEE=330-532"/>
</dbReference>
<dbReference type="PDB" id="7Z1E">
    <property type="method" value="X-ray"/>
    <property type="resolution" value="1.59 A"/>
    <property type="chains" value="EEE=330-532"/>
</dbReference>
<dbReference type="PDB" id="7Z3Z">
    <property type="method" value="EM"/>
    <property type="resolution" value="3.10 A"/>
    <property type="chains" value="A/B/C=1-1208"/>
</dbReference>
<dbReference type="PDB" id="7Z6V">
    <property type="method" value="EM"/>
    <property type="resolution" value="3.10 A"/>
    <property type="chains" value="A/B/C=1-1208"/>
</dbReference>
<dbReference type="PDB" id="7Z7X">
    <property type="method" value="EM"/>
    <property type="resolution" value="3.30 A"/>
    <property type="chains" value="A/B/C=1-1208"/>
</dbReference>
<dbReference type="PDB" id="7Z85">
    <property type="method" value="EM"/>
    <property type="resolution" value="3.10 A"/>
    <property type="chains" value="A/B/C=1-1208"/>
</dbReference>
<dbReference type="PDB" id="7Z86">
    <property type="method" value="EM"/>
    <property type="resolution" value="3.40 A"/>
    <property type="chains" value="A/B/C=1-1208"/>
</dbReference>
<dbReference type="PDB" id="7Z8O">
    <property type="method" value="X-ray"/>
    <property type="resolution" value="0.96 A"/>
    <property type="chains" value="A=333-527"/>
</dbReference>
<dbReference type="PDB" id="7Z9Q">
    <property type="method" value="EM"/>
    <property type="resolution" value="3.60 A"/>
    <property type="chains" value="A/B/C=1-1208"/>
</dbReference>
<dbReference type="PDB" id="7Z9R">
    <property type="method" value="EM"/>
    <property type="resolution" value="4.20 A"/>
    <property type="chains" value="A/B/C=1-1208"/>
</dbReference>
<dbReference type="PDB" id="7ZBU">
    <property type="method" value="EM"/>
    <property type="resolution" value="4.31 A"/>
    <property type="chains" value="A=1-1208"/>
</dbReference>
<dbReference type="PDB" id="7ZCE">
    <property type="method" value="EM"/>
    <property type="resolution" value="3.50 A"/>
    <property type="chains" value="A/B/C=1-1208"/>
</dbReference>
<dbReference type="PDB" id="7ZCF">
    <property type="method" value="EM"/>
    <property type="resolution" value="4.00 A"/>
    <property type="chains" value="C=1-1208"/>
</dbReference>
<dbReference type="PDB" id="7ZDQ">
    <property type="method" value="EM"/>
    <property type="resolution" value="3.20 A"/>
    <property type="chains" value="B=319-541"/>
</dbReference>
<dbReference type="PDB" id="7ZF3">
    <property type="method" value="X-ray"/>
    <property type="resolution" value="3.15 A"/>
    <property type="chains" value="E=333-526"/>
</dbReference>
<dbReference type="PDB" id="7ZF4">
    <property type="method" value="X-ray"/>
    <property type="resolution" value="4.18 A"/>
    <property type="chains" value="E=333-526"/>
</dbReference>
<dbReference type="PDB" id="7ZF5">
    <property type="method" value="X-ray"/>
    <property type="resolution" value="5.32 A"/>
    <property type="chains" value="A/E=333-526"/>
</dbReference>
<dbReference type="PDB" id="7ZF7">
    <property type="method" value="X-ray"/>
    <property type="resolution" value="3.46 A"/>
    <property type="chains" value="B=330-532"/>
</dbReference>
<dbReference type="PDB" id="7ZF8">
    <property type="method" value="X-ray"/>
    <property type="resolution" value="2.95 A"/>
    <property type="chains" value="E=333-526"/>
</dbReference>
<dbReference type="PDB" id="7ZF9">
    <property type="method" value="X-ray"/>
    <property type="resolution" value="3.25 A"/>
    <property type="chains" value="C/E=333-526"/>
</dbReference>
<dbReference type="PDB" id="7ZFA">
    <property type="method" value="X-ray"/>
    <property type="resolution" value="4.24 A"/>
    <property type="chains" value="A/B/C/D=333-526"/>
</dbReference>
<dbReference type="PDB" id="7ZFB">
    <property type="method" value="X-ray"/>
    <property type="resolution" value="3.08 A"/>
    <property type="chains" value="E/F=333-526"/>
</dbReference>
<dbReference type="PDB" id="7ZFC">
    <property type="method" value="X-ray"/>
    <property type="resolution" value="3.24 A"/>
    <property type="chains" value="E=333-526"/>
</dbReference>
<dbReference type="PDB" id="7ZFD">
    <property type="method" value="X-ray"/>
    <property type="resolution" value="3.39 A"/>
    <property type="chains" value="E/F=330-532"/>
</dbReference>
<dbReference type="PDB" id="7ZFE">
    <property type="method" value="X-ray"/>
    <property type="resolution" value="3.25 A"/>
    <property type="chains" value="A/B/C/E=333-526"/>
</dbReference>
<dbReference type="PDB" id="7ZJL">
    <property type="method" value="EM"/>
    <property type="resolution" value="2.60 A"/>
    <property type="chains" value="A/B/C=15-1146"/>
</dbReference>
<dbReference type="PDB" id="7ZR2">
    <property type="method" value="X-ray"/>
    <property type="resolution" value="1.45 A"/>
    <property type="chains" value="A=757-988, B=1163-1206"/>
</dbReference>
<dbReference type="PDB" id="7ZR7">
    <property type="method" value="EM"/>
    <property type="resolution" value="3.70 A"/>
    <property type="chains" value="A/B/C=1-1208"/>
</dbReference>
<dbReference type="PDB" id="7ZR8">
    <property type="method" value="EM"/>
    <property type="resolution" value="3.70 A"/>
    <property type="chains" value="A=1-1208"/>
</dbReference>
<dbReference type="PDB" id="7ZR9">
    <property type="method" value="EM"/>
    <property type="resolution" value="4.00 A"/>
    <property type="chains" value="A/B/C=1-1208"/>
</dbReference>
<dbReference type="PDB" id="7ZRC">
    <property type="method" value="EM"/>
    <property type="resolution" value="3.50 A"/>
    <property type="chains" value="A/B/C=1-1208"/>
</dbReference>
<dbReference type="PDB" id="7ZRV">
    <property type="method" value="EM"/>
    <property type="resolution" value="2.80 A"/>
    <property type="chains" value="A/B/C=1-1208"/>
</dbReference>
<dbReference type="PDB" id="7ZSD">
    <property type="method" value="EM"/>
    <property type="resolution" value="3.29 A"/>
    <property type="chains" value="M=332-527"/>
</dbReference>
<dbReference type="PDB" id="7ZSS">
    <property type="method" value="EM"/>
    <property type="resolution" value="2.63 A"/>
    <property type="chains" value="A/B/C=1-1146"/>
</dbReference>
<dbReference type="PDB" id="7ZXU">
    <property type="method" value="X-ray"/>
    <property type="resolution" value="1.89 A"/>
    <property type="chains" value="E=333-528"/>
</dbReference>
<dbReference type="PDB" id="8A94">
    <property type="method" value="EM"/>
    <property type="resolution" value="2.40 A"/>
    <property type="chains" value="A/B/C=1-1208"/>
</dbReference>
<dbReference type="PDB" id="8A95">
    <property type="method" value="EM"/>
    <property type="resolution" value="2.64 A"/>
    <property type="chains" value="A/B/C=1-1208"/>
</dbReference>
<dbReference type="PDB" id="8A96">
    <property type="method" value="EM"/>
    <property type="resolution" value="2.70 A"/>
    <property type="chains" value="C=327-531"/>
</dbReference>
<dbReference type="PDB" id="8A99">
    <property type="method" value="EM"/>
    <property type="resolution" value="2.50 A"/>
    <property type="chains" value="A/B/C=1-1208"/>
</dbReference>
<dbReference type="PDB" id="8AAA">
    <property type="method" value="X-ray"/>
    <property type="resolution" value="1.90 A"/>
    <property type="chains" value="A=333-527"/>
</dbReference>
<dbReference type="PDB" id="8AQS">
    <property type="method" value="EM"/>
    <property type="resolution" value="2.92 A"/>
    <property type="chains" value="A=1-1208"/>
</dbReference>
<dbReference type="PDB" id="8AQT">
    <property type="method" value="EM"/>
    <property type="resolution" value="4.40 A"/>
    <property type="chains" value="B=1-1208"/>
</dbReference>
<dbReference type="PDB" id="8AQU">
    <property type="method" value="EM"/>
    <property type="resolution" value="3.22 A"/>
    <property type="chains" value="B=1-1208"/>
</dbReference>
<dbReference type="PDB" id="8AQV">
    <property type="method" value="EM"/>
    <property type="resolution" value="2.96 A"/>
    <property type="chains" value="B=1-1208"/>
</dbReference>
<dbReference type="PDB" id="8AQW">
    <property type="method" value="EM"/>
    <property type="resolution" value="3.30 A"/>
    <property type="chains" value="B=1-1208"/>
</dbReference>
<dbReference type="PDB" id="8ASY">
    <property type="method" value="X-ray"/>
    <property type="resolution" value="2.85 A"/>
    <property type="chains" value="B=333-526"/>
</dbReference>
<dbReference type="PDB" id="8BBN">
    <property type="method" value="X-ray"/>
    <property type="resolution" value="3.58 A"/>
    <property type="chains" value="R/X/Y=333-528"/>
</dbReference>
<dbReference type="PDB" id="8BCZ">
    <property type="method" value="EM"/>
    <property type="resolution" value="2.90 A"/>
    <property type="chains" value="R=333-528"/>
</dbReference>
<dbReference type="PDB" id="8BE1">
    <property type="method" value="X-ray"/>
    <property type="resolution" value="1.98 A"/>
    <property type="chains" value="C/F=333-527"/>
</dbReference>
<dbReference type="PDB" id="8BEC">
    <property type="method" value="X-ray"/>
    <property type="resolution" value="1.70 A"/>
    <property type="chains" value="B/D=334-527"/>
</dbReference>
<dbReference type="PDB" id="8BEV">
    <property type="method" value="EM"/>
    <property type="resolution" value="5.92 A"/>
    <property type="chains" value="A/C=1-1208"/>
</dbReference>
<dbReference type="PDB" id="8BG1">
    <property type="method" value="X-ray"/>
    <property type="resolution" value="2.88 A"/>
    <property type="chains" value="C/F/I/L=334-527"/>
</dbReference>
<dbReference type="PDB" id="8BG2">
    <property type="method" value="X-ray"/>
    <property type="resolution" value="2.10 A"/>
    <property type="chains" value="B/D=334-527"/>
</dbReference>
<dbReference type="PDB" id="8BG3">
    <property type="method" value="X-ray"/>
    <property type="resolution" value="1.90 A"/>
    <property type="chains" value="B/D=334-527"/>
</dbReference>
<dbReference type="PDB" id="8BG4">
    <property type="method" value="X-ray"/>
    <property type="resolution" value="1.60 A"/>
    <property type="chains" value="B/D=334-527"/>
</dbReference>
<dbReference type="PDB" id="8BG5">
    <property type="method" value="X-ray"/>
    <property type="resolution" value="2.05 A"/>
    <property type="chains" value="B/D=334-527"/>
</dbReference>
<dbReference type="PDB" id="8BG6">
    <property type="method" value="EM"/>
    <property type="resolution" value="4.11 A"/>
    <property type="chains" value="E=16-1208"/>
</dbReference>
<dbReference type="PDB" id="8BG8">
    <property type="method" value="EM"/>
    <property type="resolution" value="3.64 A"/>
    <property type="chains" value="A=16-1208"/>
</dbReference>
<dbReference type="PDB" id="8BGG">
    <property type="method" value="EM"/>
    <property type="resolution" value="6.04 A"/>
    <property type="chains" value="B/C=1-1207"/>
</dbReference>
<dbReference type="PDB" id="8BH5">
    <property type="method" value="X-ray"/>
    <property type="resolution" value="2.38 A"/>
    <property type="chains" value="E=333-528"/>
</dbReference>
<dbReference type="PDB" id="8BON">
    <property type="method" value="EM"/>
    <property type="resolution" value="3.20 A"/>
    <property type="chains" value="A/B/C=14-1208"/>
</dbReference>
<dbReference type="PDB" id="8BSE">
    <property type="method" value="X-ray"/>
    <property type="resolution" value="1.90 A"/>
    <property type="chains" value="A=319-541"/>
</dbReference>
<dbReference type="PDB" id="8BSF">
    <property type="method" value="X-ray"/>
    <property type="resolution" value="2.20 A"/>
    <property type="chains" value="A=319-541"/>
</dbReference>
<dbReference type="PDB" id="8C0Y">
    <property type="method" value="EM"/>
    <property type="resolution" value="2.68 A"/>
    <property type="chains" value="A=334-526"/>
</dbReference>
<dbReference type="PDB" id="8C1V">
    <property type="method" value="EM"/>
    <property type="resolution" value="2.90 A"/>
    <property type="chains" value="A/B/C=26-1149"/>
</dbReference>
<dbReference type="PDB" id="8C2R">
    <property type="method" value="EM"/>
    <property type="resolution" value="2.56 A"/>
    <property type="chains" value="A/B/C=26-1147"/>
</dbReference>
<dbReference type="PDB" id="8C3V">
    <property type="method" value="X-ray"/>
    <property type="resolution" value="2.74 A"/>
    <property type="chains" value="R/X/Y=333-528"/>
</dbReference>
<dbReference type="PDB" id="8C5R">
    <property type="method" value="EM"/>
    <property type="resolution" value="3.70 A"/>
    <property type="chains" value="A/B/C=14-1147"/>
</dbReference>
<dbReference type="PDB" id="8C89">
    <property type="method" value="EM"/>
    <property type="resolution" value="4.41 A"/>
    <property type="chains" value="C=324-533"/>
</dbReference>
<dbReference type="PDB" id="8C8P">
    <property type="method" value="EM"/>
    <property type="resolution" value="4.10 A"/>
    <property type="chains" value="A=1-1208"/>
</dbReference>
<dbReference type="PDB" id="8CBD">
    <property type="method" value="X-ray"/>
    <property type="resolution" value="3.52 A"/>
    <property type="chains" value="R/X/Y=333-526"/>
</dbReference>
<dbReference type="PDB" id="8CBE">
    <property type="method" value="X-ray"/>
    <property type="resolution" value="3.16 A"/>
    <property type="chains" value="E=333-526"/>
</dbReference>
<dbReference type="PDB" id="8CBF">
    <property type="method" value="X-ray"/>
    <property type="resolution" value="2.33 A"/>
    <property type="chains" value="E=333-526"/>
</dbReference>
<dbReference type="PDB" id="8CII">
    <property type="method" value="EM"/>
    <property type="resolution" value="2.70 A"/>
    <property type="chains" value="E=327-528"/>
</dbReference>
<dbReference type="PDB" id="8CIM">
    <property type="method" value="EM"/>
    <property type="resolution" value="3.00 A"/>
    <property type="chains" value="A/B/C=1-1208"/>
</dbReference>
<dbReference type="PDB" id="8CIN">
    <property type="method" value="EM"/>
    <property type="resolution" value="2.70 A"/>
    <property type="chains" value="A/B/C=28-1147"/>
</dbReference>
<dbReference type="PDB" id="8CMA">
    <property type="method" value="X-ray"/>
    <property type="resolution" value="3.29 A"/>
    <property type="chains" value="E=333-526"/>
</dbReference>
<dbReference type="PDB" id="8CMB">
    <property type="method" value="X-ray"/>
    <property type="resolution" value="1.84 A"/>
    <property type="chains" value="C=486-505"/>
</dbReference>
<dbReference type="PDB" id="8CMC">
    <property type="method" value="X-ray"/>
    <property type="resolution" value="1.42 A"/>
    <property type="chains" value="C=511-530"/>
</dbReference>
<dbReference type="PDB" id="8CMD">
    <property type="method" value="X-ray"/>
    <property type="resolution" value="2.54 A"/>
    <property type="chains" value="C/F/I=761-775"/>
</dbReference>
<dbReference type="PDB" id="8CMH">
    <property type="method" value="X-ray"/>
    <property type="resolution" value="1.64 A"/>
    <property type="chains" value="C=486-505"/>
</dbReference>
<dbReference type="PDB" id="8CMI">
    <property type="method" value="X-ray"/>
    <property type="resolution" value="2.60 A"/>
    <property type="chains" value="C/F/I=761-775"/>
</dbReference>
<dbReference type="PDB" id="8CSA">
    <property type="method" value="EM"/>
    <property type="resolution" value="3.84 A"/>
    <property type="chains" value="A/B/C=1-1208"/>
</dbReference>
<dbReference type="PDB" id="8CSJ">
    <property type="method" value="EM"/>
    <property type="resolution" value="3.53 A"/>
    <property type="chains" value="A/B/C=14-1147"/>
</dbReference>
<dbReference type="PDB" id="8CWI">
    <property type="method" value="X-ray"/>
    <property type="resolution" value="1.87 A"/>
    <property type="chains" value="A=333-528"/>
</dbReference>
<dbReference type="PDB" id="8CWK">
    <property type="method" value="X-ray"/>
    <property type="resolution" value="2.37 A"/>
    <property type="chains" value="C=333-528"/>
</dbReference>
<dbReference type="PDB" id="8CWU">
    <property type="method" value="X-ray"/>
    <property type="resolution" value="1.71 A"/>
    <property type="chains" value="A=333-530"/>
</dbReference>
<dbReference type="PDB" id="8CWV">
    <property type="method" value="X-ray"/>
    <property type="resolution" value="2.51 A"/>
    <property type="chains" value="A=333-530"/>
</dbReference>
<dbReference type="PDB" id="8CXN">
    <property type="method" value="EM"/>
    <property type="resolution" value="2.90 A"/>
    <property type="chains" value="A/B/C=1-1273"/>
</dbReference>
<dbReference type="PDB" id="8CXQ">
    <property type="method" value="EM"/>
    <property type="resolution" value="2.30 A"/>
    <property type="chains" value="A/B/C=1-1273"/>
</dbReference>
<dbReference type="PDB" id="8CY6">
    <property type="method" value="EM"/>
    <property type="resolution" value="3.20 A"/>
    <property type="chains" value="A/B/C=1-1273"/>
</dbReference>
<dbReference type="PDB" id="8CY7">
    <property type="method" value="EM"/>
    <property type="resolution" value="2.90 A"/>
    <property type="chains" value="A/B/C=1-1273"/>
</dbReference>
<dbReference type="PDB" id="8CY9">
    <property type="method" value="EM"/>
    <property type="resolution" value="2.90 A"/>
    <property type="chains" value="A/B/C=1-1273"/>
</dbReference>
<dbReference type="PDB" id="8CYA">
    <property type="method" value="EM"/>
    <property type="resolution" value="2.70 A"/>
    <property type="chains" value="A/B/C=1-1273"/>
</dbReference>
<dbReference type="PDB" id="8CYB">
    <property type="method" value="EM"/>
    <property type="resolution" value="2.70 A"/>
    <property type="chains" value="A/B/C=1-1273"/>
</dbReference>
<dbReference type="PDB" id="8CYC">
    <property type="method" value="EM"/>
    <property type="resolution" value="2.90 A"/>
    <property type="chains" value="A/B/C=1-1273"/>
</dbReference>
<dbReference type="PDB" id="8CYD">
    <property type="method" value="EM"/>
    <property type="resolution" value="2.60 A"/>
    <property type="chains" value="A/B/C=15-1147"/>
</dbReference>
<dbReference type="PDB" id="8CYJ">
    <property type="method" value="EM"/>
    <property type="resolution" value="3.60 A"/>
    <property type="chains" value="R=1-1273"/>
</dbReference>
<dbReference type="PDB" id="8CZI">
    <property type="method" value="EM"/>
    <property type="resolution" value="2.22 A"/>
    <property type="chains" value="A/B/C=917-988, D/E/F=1157-1201"/>
</dbReference>
<dbReference type="PDB" id="8D0Z">
    <property type="method" value="EM"/>
    <property type="resolution" value="3.70 A"/>
    <property type="chains" value="A/B/C=1-1208"/>
</dbReference>
<dbReference type="PDB" id="8D36">
    <property type="method" value="X-ray"/>
    <property type="resolution" value="1.45 A"/>
    <property type="chains" value="F=812-826"/>
</dbReference>
<dbReference type="PDB" id="8D47">
    <property type="method" value="X-ray"/>
    <property type="resolution" value="2.00 A"/>
    <property type="chains" value="C/D=812-831"/>
</dbReference>
<dbReference type="PDB" id="8D48">
    <property type="method" value="EM"/>
    <property type="resolution" value="3.70 A"/>
    <property type="chains" value="A=1-1213"/>
</dbReference>
<dbReference type="PDB" id="8D55">
    <property type="method" value="EM"/>
    <property type="resolution" value="2.80 A"/>
    <property type="chains" value="A/B/C=1-1273"/>
</dbReference>
<dbReference type="PDB" id="8D56">
    <property type="method" value="EM"/>
    <property type="resolution" value="3.00 A"/>
    <property type="chains" value="A/B/C=1-1273"/>
</dbReference>
<dbReference type="PDB" id="8D5A">
    <property type="method" value="EM"/>
    <property type="resolution" value="3.10 A"/>
    <property type="chains" value="A/B/C=1-1273"/>
</dbReference>
<dbReference type="PDB" id="8D6Z">
    <property type="method" value="X-ray"/>
    <property type="resolution" value="2.30 A"/>
    <property type="chains" value="H/J/K/L=809-823"/>
</dbReference>
<dbReference type="PDB" id="8D8Q">
    <property type="method" value="EM"/>
    <property type="resolution" value="4.20 A"/>
    <property type="chains" value="A=16-1175"/>
</dbReference>
<dbReference type="PDB" id="8D8R">
    <property type="method" value="EM"/>
    <property type="resolution" value="4.10 A"/>
    <property type="chains" value="A=16-1175"/>
</dbReference>
<dbReference type="PDB" id="8DAD">
    <property type="method" value="EM"/>
    <property type="resolution" value="3.85 A"/>
    <property type="chains" value="B=1-1213"/>
</dbReference>
<dbReference type="PDB" id="8DAO">
    <property type="method" value="X-ray"/>
    <property type="resolution" value="2.80 A"/>
    <property type="chains" value="I/J=809-823"/>
</dbReference>
<dbReference type="PDB" id="8DCC">
    <property type="method" value="X-ray"/>
    <property type="resolution" value="2.60 A"/>
    <property type="chains" value="E=333-526"/>
</dbReference>
<dbReference type="PDB" id="8DCE">
    <property type="method" value="X-ray"/>
    <property type="resolution" value="2.00 A"/>
    <property type="chains" value="A=333-526"/>
</dbReference>
<dbReference type="PDB" id="8DF5">
    <property type="method" value="X-ray"/>
    <property type="resolution" value="2.70 A"/>
    <property type="chains" value="R/S=328-529"/>
</dbReference>
<dbReference type="PDB" id="8DGU">
    <property type="method" value="X-ray"/>
    <property type="resolution" value="1.89 A"/>
    <property type="chains" value="A=1140-1164"/>
</dbReference>
<dbReference type="PDB" id="8DI5">
    <property type="method" value="EM"/>
    <property type="resolution" value="3.04 A"/>
    <property type="chains" value="C=1-1208"/>
</dbReference>
<dbReference type="PDB" id="8DLI">
    <property type="method" value="EM"/>
    <property type="resolution" value="2.56 A"/>
    <property type="chains" value="A/B/C=1-1208"/>
</dbReference>
<dbReference type="PDB" id="8DLJ">
    <property type="method" value="EM"/>
    <property type="resolution" value="2.91 A"/>
    <property type="chains" value="A/B/C=1-1208"/>
</dbReference>
<dbReference type="PDB" id="8DLK">
    <property type="method" value="EM"/>
    <property type="resolution" value="3.04 A"/>
    <property type="chains" value="B=1-1208"/>
</dbReference>
<dbReference type="PDB" id="8DLL">
    <property type="method" value="EM"/>
    <property type="resolution" value="2.56 A"/>
    <property type="chains" value="A/B/C=1-1208"/>
</dbReference>
<dbReference type="PDB" id="8DLM">
    <property type="method" value="EM"/>
    <property type="resolution" value="2.89 A"/>
    <property type="chains" value="A/B/C=1-1208"/>
</dbReference>
<dbReference type="PDB" id="8DLN">
    <property type="method" value="EM"/>
    <property type="resolution" value="3.04 A"/>
    <property type="chains" value="B=1-1208"/>
</dbReference>
<dbReference type="PDB" id="8DLO">
    <property type="method" value="EM"/>
    <property type="resolution" value="2.25 A"/>
    <property type="chains" value="A/B/C=1-1208"/>
</dbReference>
<dbReference type="PDB" id="8DLP">
    <property type="method" value="EM"/>
    <property type="resolution" value="2.64 A"/>
    <property type="chains" value="A/B/C=1-1208"/>
</dbReference>
<dbReference type="PDB" id="8DLQ">
    <property type="method" value="EM"/>
    <property type="resolution" value="2.77 A"/>
    <property type="chains" value="B=1-1208"/>
</dbReference>
<dbReference type="PDB" id="8DLR">
    <property type="method" value="EM"/>
    <property type="resolution" value="2.51 A"/>
    <property type="chains" value="A=1-1208"/>
</dbReference>
<dbReference type="PDB" id="8DLS">
    <property type="method" value="EM"/>
    <property type="resolution" value="2.66 A"/>
    <property type="chains" value="A=1-1208"/>
</dbReference>
<dbReference type="PDB" id="8DLT">
    <property type="method" value="EM"/>
    <property type="resolution" value="2.40 A"/>
    <property type="chains" value="A/B/C=1-1208"/>
</dbReference>
<dbReference type="PDB" id="8DLU">
    <property type="method" value="EM"/>
    <property type="resolution" value="3.14 A"/>
    <property type="chains" value="A/B/C=1-1208"/>
</dbReference>
<dbReference type="PDB" id="8DLV">
    <property type="method" value="EM"/>
    <property type="resolution" value="3.11 A"/>
    <property type="chains" value="B=1-1208"/>
</dbReference>
<dbReference type="PDB" id="8DLW">
    <property type="method" value="EM"/>
    <property type="resolution" value="2.16 A"/>
    <property type="chains" value="A/B/E=1-1208"/>
</dbReference>
<dbReference type="PDB" id="8DLX">
    <property type="method" value="EM"/>
    <property type="resolution" value="2.45 A"/>
    <property type="chains" value="A/B/C=1-1208"/>
</dbReference>
<dbReference type="PDB" id="8DLY">
    <property type="method" value="EM"/>
    <property type="resolution" value="3.00 A"/>
    <property type="chains" value="C=1-1208"/>
</dbReference>
<dbReference type="PDB" id="8DLZ">
    <property type="method" value="EM"/>
    <property type="resolution" value="2.57 A"/>
    <property type="chains" value="A/B/C=1-1208"/>
</dbReference>
<dbReference type="PDB" id="8DM0">
    <property type="method" value="EM"/>
    <property type="resolution" value="3.21 A"/>
    <property type="chains" value="C=1-1208"/>
</dbReference>
<dbReference type="PDB" id="8DM1">
    <property type="method" value="EM"/>
    <property type="resolution" value="3.04 A"/>
    <property type="chains" value="A/B/C=1-1208"/>
</dbReference>
<dbReference type="PDB" id="8DM2">
    <property type="method" value="EM"/>
    <property type="resolution" value="2.91 A"/>
    <property type="chains" value="A=1-1208"/>
</dbReference>
<dbReference type="PDB" id="8DM3">
    <property type="method" value="EM"/>
    <property type="resolution" value="2.37 A"/>
    <property type="chains" value="A/B/C=1-1208"/>
</dbReference>
<dbReference type="PDB" id="8DM4">
    <property type="method" value="EM"/>
    <property type="resolution" value="2.45 A"/>
    <property type="chains" value="A=1-1208"/>
</dbReference>
<dbReference type="PDB" id="8DM5">
    <property type="method" value="EM"/>
    <property type="resolution" value="2.51 A"/>
    <property type="chains" value="A/B/C=1-1208"/>
</dbReference>
<dbReference type="PDB" id="8DM6">
    <property type="method" value="EM"/>
    <property type="resolution" value="2.77 A"/>
    <property type="chains" value="A=1-1208"/>
</dbReference>
<dbReference type="PDB" id="8DM7">
    <property type="method" value="EM"/>
    <property type="resolution" value="2.49 A"/>
    <property type="chains" value="A/B/C=1-1208"/>
</dbReference>
<dbReference type="PDB" id="8DM8">
    <property type="method" value="EM"/>
    <property type="resolution" value="2.68 A"/>
    <property type="chains" value="A=1-1208"/>
</dbReference>
<dbReference type="PDB" id="8DM9">
    <property type="method" value="EM"/>
    <property type="resolution" value="2.56 A"/>
    <property type="chains" value="A/B/C=1-1208"/>
</dbReference>
<dbReference type="PDB" id="8DMA">
    <property type="method" value="EM"/>
    <property type="resolution" value="2.79 A"/>
    <property type="chains" value="A=1-1208"/>
</dbReference>
<dbReference type="PDB" id="8DNN">
    <property type="method" value="X-ray"/>
    <property type="resolution" value="3.12 A"/>
    <property type="chains" value="A/D=319-541"/>
</dbReference>
<dbReference type="PDB" id="8DPZ">
    <property type="method" value="EM"/>
    <property type="resolution" value="3.38 A"/>
    <property type="chains" value="B=326-530"/>
</dbReference>
<dbReference type="PDB" id="8DT3">
    <property type="method" value="EM"/>
    <property type="resolution" value="3.30 A"/>
    <property type="chains" value="C=1-1273"/>
</dbReference>
<dbReference type="PDB" id="8DT8">
    <property type="method" value="EM"/>
    <property type="resolution" value="3.34 A"/>
    <property type="chains" value="A/B/C=1-1208"/>
</dbReference>
<dbReference type="PDB" id="8DTK">
    <property type="method" value="EM"/>
    <property type="resolution" value="3.77 A"/>
    <property type="chains" value="A=330-532"/>
</dbReference>
<dbReference type="PDB" id="8DTR">
    <property type="method" value="X-ray"/>
    <property type="resolution" value="1.50 A"/>
    <property type="chains" value="G/J=1145-1159"/>
</dbReference>
<dbReference type="PDB" id="8DTT">
    <property type="method" value="X-ray"/>
    <property type="resolution" value="1.75 A"/>
    <property type="chains" value="G/J=1148-1162"/>
</dbReference>
<dbReference type="PDB" id="8DTX">
    <property type="method" value="X-ray"/>
    <property type="resolution" value="1.60 A"/>
    <property type="chains" value="G/I=1145-1159"/>
</dbReference>
<dbReference type="PDB" id="8DV1">
    <property type="method" value="EM"/>
    <property type="resolution" value="3.40 A"/>
    <property type="chains" value="A=1-1208"/>
</dbReference>
<dbReference type="PDB" id="8DV2">
    <property type="method" value="EM"/>
    <property type="resolution" value="3.50 A"/>
    <property type="chains" value="A=1-1208"/>
</dbReference>
<dbReference type="PDB" id="8DW2">
    <property type="method" value="EM"/>
    <property type="resolution" value="4.11 A"/>
    <property type="chains" value="B=330-526"/>
</dbReference>
<dbReference type="PDB" id="8DW3">
    <property type="method" value="EM"/>
    <property type="resolution" value="4.26 A"/>
    <property type="chains" value="B=330-526"/>
</dbReference>
<dbReference type="PDB" id="8DW9">
    <property type="method" value="X-ray"/>
    <property type="resolution" value="4.00 A"/>
    <property type="chains" value="A/B=333-527"/>
</dbReference>
<dbReference type="PDB" id="8DWA">
    <property type="method" value="X-ray"/>
    <property type="resolution" value="3.20 A"/>
    <property type="chains" value="A=335-515"/>
</dbReference>
<dbReference type="PDB" id="8DXS">
    <property type="method" value="EM"/>
    <property type="resolution" value="3.76 A"/>
    <property type="chains" value="A/B/C=1-1208"/>
</dbReference>
<dbReference type="PDB" id="8DXT">
    <property type="method" value="X-ray"/>
    <property type="resolution" value="2.25 A"/>
    <property type="chains" value="R=333-528"/>
</dbReference>
<dbReference type="PDB" id="8DXU">
    <property type="method" value="X-ray"/>
    <property type="resolution" value="2.73 A"/>
    <property type="chains" value="R=333-528"/>
</dbReference>
<dbReference type="PDB" id="8DYA">
    <property type="method" value="EM"/>
    <property type="resolution" value="3.67 A"/>
    <property type="chains" value="A/B/C=686-1208"/>
</dbReference>
<dbReference type="PDB" id="8DZH">
    <property type="method" value="EM"/>
    <property type="resolution" value="3.20 A"/>
    <property type="chains" value="A/B/C=1-1208"/>
</dbReference>
<dbReference type="PDB" id="8DZI">
    <property type="method" value="EM"/>
    <property type="resolution" value="3.50 A"/>
    <property type="chains" value="A/C/E=1-1208"/>
</dbReference>
<dbReference type="PDB" id="8E1G">
    <property type="method" value="X-ray"/>
    <property type="resolution" value="2.57 A"/>
    <property type="chains" value="A/B=319-591"/>
</dbReference>
<dbReference type="PDB" id="8EDF">
    <property type="method" value="X-ray"/>
    <property type="resolution" value="3.40 A"/>
    <property type="chains" value="A=334-527"/>
</dbReference>
<dbReference type="PDB" id="8EKD">
    <property type="method" value="EM"/>
    <property type="resolution" value="3.60 A"/>
    <property type="chains" value="G=333-516"/>
</dbReference>
<dbReference type="PDB" id="8EL2">
    <property type="method" value="X-ray"/>
    <property type="resolution" value="2.89 A"/>
    <property type="chains" value="A/B=319-541"/>
</dbReference>
<dbReference type="PDB" id="8ELH">
    <property type="method" value="X-ray"/>
    <property type="resolution" value="1.85 A"/>
    <property type="chains" value="C=919-927"/>
</dbReference>
<dbReference type="PDB" id="8ELJ">
    <property type="method" value="EM"/>
    <property type="resolution" value="3.60 A"/>
    <property type="chains" value="A/B/C=13-1211"/>
</dbReference>
<dbReference type="PDB" id="8ELO">
    <property type="method" value="X-ray"/>
    <property type="resolution" value="2.72 A"/>
    <property type="chains" value="A=333-530"/>
</dbReference>
<dbReference type="PDB" id="8ELP">
    <property type="method" value="X-ray"/>
    <property type="resolution" value="2.83 A"/>
    <property type="chains" value="A=333-530"/>
</dbReference>
<dbReference type="PDB" id="8ELQ">
    <property type="method" value="X-ray"/>
    <property type="resolution" value="2.21 A"/>
    <property type="chains" value="A=333-530"/>
</dbReference>
<dbReference type="PDB" id="8ENS">
    <property type="method" value="X-ray"/>
    <property type="resolution" value="1.45 A"/>
    <property type="chains" value="C=1267-1273"/>
</dbReference>
<dbReference type="PDB" id="8ENW">
    <property type="method" value="X-ray"/>
    <property type="resolution" value="1.45 A"/>
    <property type="chains" value="C/D=1267-1272"/>
</dbReference>
<dbReference type="PDB" id="8ENX">
    <property type="method" value="X-ray"/>
    <property type="resolution" value="1.80 A"/>
    <property type="chains" value="C=1267-1272"/>
</dbReference>
<dbReference type="PDB" id="8EOO">
    <property type="method" value="X-ray"/>
    <property type="resolution" value="2.77 A"/>
    <property type="chains" value="C/D=331-527"/>
</dbReference>
<dbReference type="PDB" id="8EPN">
    <property type="method" value="EM"/>
    <property type="resolution" value="2.80 A"/>
    <property type="chains" value="A/B/C=27-1147"/>
</dbReference>
<dbReference type="PDB" id="8EPP">
    <property type="method" value="EM"/>
    <property type="resolution" value="3.10 A"/>
    <property type="chains" value="A/B/C=27-1147"/>
</dbReference>
<dbReference type="PDB" id="8EPQ">
    <property type="method" value="EM"/>
    <property type="resolution" value="3.30 A"/>
    <property type="chains" value="A/B/C=27-1147"/>
</dbReference>
<dbReference type="PDB" id="8EQF">
    <property type="method" value="EM"/>
    <property type="resolution" value="3.16 A"/>
    <property type="chains" value="A=333-526"/>
</dbReference>
<dbReference type="PDB" id="8EYG">
    <property type="method" value="EM"/>
    <property type="resolution" value="3.73 A"/>
    <property type="chains" value="A/B/C=14-1149"/>
</dbReference>
<dbReference type="PDB" id="8EYH">
    <property type="method" value="EM"/>
    <property type="resolution" value="3.75 A"/>
    <property type="chains" value="A/B/C=14-1149"/>
</dbReference>
<dbReference type="PDB" id="8F0G">
    <property type="method" value="EM"/>
    <property type="resolution" value="3.35 A"/>
    <property type="chains" value="A/B/C=14-1208"/>
</dbReference>
<dbReference type="PDB" id="8F0H">
    <property type="method" value="EM"/>
    <property type="resolution" value="3.18 A"/>
    <property type="chains" value="C=14-1208"/>
</dbReference>
<dbReference type="PDB" id="8F0I">
    <property type="method" value="X-ray"/>
    <property type="resolution" value="3.70 A"/>
    <property type="chains" value="A/B/G=333-530"/>
</dbReference>
<dbReference type="PDB" id="8F2J">
    <property type="method" value="X-ray"/>
    <property type="resolution" value="3.16 A"/>
    <property type="chains" value="C/E/G/K=331-527"/>
</dbReference>
<dbReference type="PDB" id="8F2X">
    <property type="method" value="X-ray"/>
    <property type="resolution" value="3.50 A"/>
    <property type="chains" value="A=331-527"/>
</dbReference>
<dbReference type="PDB" id="8F4P">
    <property type="method" value="EM"/>
    <property type="resolution" value="3.70 A"/>
    <property type="chains" value="A/B/C=14-1149"/>
</dbReference>
<dbReference type="PDB" id="8FA1">
    <property type="method" value="EM"/>
    <property type="resolution" value="2.51 A"/>
    <property type="chains" value="D/E/F=1157-1201"/>
</dbReference>
<dbReference type="PDB" id="8FA2">
    <property type="method" value="EM"/>
    <property type="resolution" value="2.82 A"/>
    <property type="chains" value="A/B/C=917-988, D/E/F=1157-1201"/>
</dbReference>
<dbReference type="PDB" id="8FAH">
    <property type="method" value="X-ray"/>
    <property type="resolution" value="4.22 A"/>
    <property type="chains" value="A=331-527"/>
</dbReference>
<dbReference type="PDB" id="8FDW">
    <property type="method" value="EM"/>
    <property type="resolution" value="2.90 A"/>
    <property type="chains" value="A/B/C=686-1273"/>
</dbReference>
<dbReference type="PDB" id="8FEZ">
    <property type="method" value="EM"/>
    <property type="resolution" value="3.72 A"/>
    <property type="chains" value="A/B/C=1-1208"/>
</dbReference>
<dbReference type="PDB" id="8FHY">
    <property type="method" value="X-ray"/>
    <property type="resolution" value="2.53 A"/>
    <property type="chains" value="A/D/I=331-527"/>
</dbReference>
<dbReference type="PDB" id="8FI9">
    <property type="method" value="X-ray"/>
    <property type="resolution" value="4.20 A"/>
    <property type="chains" value="A/C/K/O=331-527"/>
</dbReference>
<dbReference type="PDB" id="8FU7">
    <property type="method" value="EM"/>
    <property type="resolution" value="3.21 A"/>
    <property type="chains" value="A/B/C=1-1204"/>
</dbReference>
<dbReference type="PDB" id="8FU8">
    <property type="method" value="EM"/>
    <property type="resolution" value="3.08 A"/>
    <property type="chains" value="A/B/C=1-1208"/>
</dbReference>
<dbReference type="PDB" id="8FU9">
    <property type="method" value="EM"/>
    <property type="resolution" value="3.52 A"/>
    <property type="chains" value="A/B/C=1-1208"/>
</dbReference>
<dbReference type="PDB" id="8FXB">
    <property type="method" value="EM"/>
    <property type="resolution" value="3.10 A"/>
    <property type="chains" value="E=328-528"/>
</dbReference>
<dbReference type="PDB" id="8FXC">
    <property type="method" value="EM"/>
    <property type="resolution" value="3.20 A"/>
    <property type="chains" value="E=328-528"/>
</dbReference>
<dbReference type="PDB" id="8G70">
    <property type="method" value="EM"/>
    <property type="resolution" value="3.40 A"/>
    <property type="chains" value="A/B/D=14-1211"/>
</dbReference>
<dbReference type="PDB" id="8G71">
    <property type="method" value="EM"/>
    <property type="resolution" value="2.10 A"/>
    <property type="chains" value="A/B/D=14-1211"/>
</dbReference>
<dbReference type="PDB" id="8G72">
    <property type="method" value="EM"/>
    <property type="resolution" value="5.60 A"/>
    <property type="chains" value="B=14-1211"/>
</dbReference>
<dbReference type="PDB" id="8G73">
    <property type="method" value="EM"/>
    <property type="resolution" value="2.50 A"/>
    <property type="chains" value="A/B/D=14-1211"/>
</dbReference>
<dbReference type="PDB" id="8G74">
    <property type="method" value="EM"/>
    <property type="resolution" value="2.50 A"/>
    <property type="chains" value="A/B/D=14-1211"/>
</dbReference>
<dbReference type="PDB" id="8G75">
    <property type="method" value="EM"/>
    <property type="resolution" value="3.40 A"/>
    <property type="chains" value="A/B/D=14-1211"/>
</dbReference>
<dbReference type="PDB" id="8G76">
    <property type="method" value="EM"/>
    <property type="resolution" value="3.80 A"/>
    <property type="chains" value="A/B/D=14-1211"/>
</dbReference>
<dbReference type="PDB" id="8G77">
    <property type="method" value="EM"/>
    <property type="resolution" value="2.80 A"/>
    <property type="chains" value="A/B/D=14-1211"/>
</dbReference>
<dbReference type="PDB" id="8G78">
    <property type="method" value="EM"/>
    <property type="resolution" value="3.40 A"/>
    <property type="chains" value="A/B/D=14-1211"/>
</dbReference>
<dbReference type="PDB" id="8G79">
    <property type="method" value="EM"/>
    <property type="resolution" value="6.10 A"/>
    <property type="chains" value="A/B/D=14-1211"/>
</dbReference>
<dbReference type="PDB" id="8G7A">
    <property type="method" value="EM"/>
    <property type="resolution" value="3.30 A"/>
    <property type="chains" value="A/B/D=14-1211"/>
</dbReference>
<dbReference type="PDB" id="8G7B">
    <property type="method" value="EM"/>
    <property type="resolution" value="3.20 A"/>
    <property type="chains" value="A/B/D=14-1211"/>
</dbReference>
<dbReference type="PDB" id="8G7C">
    <property type="method" value="EM"/>
    <property type="resolution" value="4.10 A"/>
    <property type="chains" value="A/B/D=14-1211"/>
</dbReference>
<dbReference type="PDB" id="8GB0">
    <property type="method" value="EM"/>
    <property type="resolution" value="4.10 A"/>
    <property type="chains" value="A/B/C=1-1213"/>
</dbReference>
<dbReference type="PDB" id="8GB5">
    <property type="method" value="X-ray"/>
    <property type="resolution" value="3.35 A"/>
    <property type="chains" value="A/D/G/J=333-530"/>
</dbReference>
<dbReference type="PDB" id="8GB6">
    <property type="method" value="X-ray"/>
    <property type="resolution" value="1.75 A"/>
    <property type="chains" value="A=333-530"/>
</dbReference>
<dbReference type="PDB" id="8GB7">
    <property type="method" value="X-ray"/>
    <property type="resolution" value="2.57 A"/>
    <property type="chains" value="A=333-530"/>
</dbReference>
<dbReference type="PDB" id="8GB8">
    <property type="method" value="X-ray"/>
    <property type="resolution" value="2.30 A"/>
    <property type="chains" value="E=319-541"/>
</dbReference>
<dbReference type="PDB" id="8GDR">
    <property type="method" value="EM"/>
    <property type="resolution" value="3.60 A"/>
    <property type="chains" value="A/E/F=14-1149"/>
</dbReference>
<dbReference type="PDB" id="8GF2">
    <property type="method" value="X-ray"/>
    <property type="resolution" value="2.85 A"/>
    <property type="chains" value="A/B=319-541"/>
</dbReference>
<dbReference type="PDB" id="8GJM">
    <property type="method" value="EM"/>
    <property type="resolution" value="2.80 A"/>
    <property type="chains" value="A/B/C=1-1273"/>
</dbReference>
<dbReference type="PDB" id="8GJN">
    <property type="method" value="EM"/>
    <property type="resolution" value="3.60 A"/>
    <property type="chains" value="C=333-530"/>
</dbReference>
<dbReference type="PDB" id="8GNH">
    <property type="method" value="EM"/>
    <property type="resolution" value="3.74 A"/>
    <property type="chains" value="A/B/C=1-1208"/>
</dbReference>
<dbReference type="PDB" id="8GOM">
    <property type="method" value="X-ray"/>
    <property type="resolution" value="2.78 A"/>
    <property type="chains" value="C=1000-1008"/>
</dbReference>
<dbReference type="PDB" id="8GON">
    <property type="method" value="X-ray"/>
    <property type="resolution" value="2.60 A"/>
    <property type="chains" value="C=1000-1008"/>
</dbReference>
<dbReference type="PDB" id="8GOU">
    <property type="method" value="EM"/>
    <property type="resolution" value="3.70 A"/>
    <property type="chains" value="A/B/C=1-1208"/>
</dbReference>
<dbReference type="PDB" id="8GPY">
    <property type="method" value="X-ray"/>
    <property type="resolution" value="2.51 A"/>
    <property type="chains" value="A/B=333-530"/>
</dbReference>
<dbReference type="PDB" id="8GRY">
    <property type="method" value="EM"/>
    <property type="resolution" value="3.29 A"/>
    <property type="chains" value="B=333-527"/>
</dbReference>
<dbReference type="PDB" id="8GS6">
    <property type="method" value="EM"/>
    <property type="resolution" value="2.86 A"/>
    <property type="chains" value="A/B/C=12-1210"/>
</dbReference>
<dbReference type="PDB" id="8GS9">
    <property type="method" value="EM"/>
    <property type="resolution" value="2.66 A"/>
    <property type="chains" value="A=337-517"/>
</dbReference>
<dbReference type="PDB" id="8GSB">
    <property type="method" value="EM"/>
    <property type="resolution" value="3.99 A"/>
    <property type="chains" value="A=319-541"/>
</dbReference>
<dbReference type="PDB" id="8GTO">
    <property type="method" value="EM"/>
    <property type="resolution" value="3.20 A"/>
    <property type="chains" value="A/B/C=1-1273"/>
</dbReference>
<dbReference type="PDB" id="8GTP">
    <property type="method" value="EM"/>
    <property type="resolution" value="3.10 A"/>
    <property type="chains" value="A/B/C=1-1273"/>
</dbReference>
<dbReference type="PDB" id="8GTQ">
    <property type="method" value="EM"/>
    <property type="resolution" value="3.10 A"/>
    <property type="chains" value="A/B/C=1-1273"/>
</dbReference>
<dbReference type="PDB" id="8GX9">
    <property type="method" value="X-ray"/>
    <property type="resolution" value="4.01 A"/>
    <property type="chains" value="A/E=319-529"/>
</dbReference>
<dbReference type="PDB" id="8GZ5">
    <property type="method" value="X-ray"/>
    <property type="resolution" value="1.70 A"/>
    <property type="chains" value="A=333-530"/>
</dbReference>
<dbReference type="PDB" id="8GZZ">
    <property type="method" value="EM"/>
    <property type="resolution" value="3.52 A"/>
    <property type="chains" value="A/B=334-527"/>
</dbReference>
<dbReference type="PDB" id="8H00">
    <property type="method" value="EM"/>
    <property type="resolution" value="3.41 A"/>
    <property type="chains" value="A/B/C=1-1208"/>
</dbReference>
<dbReference type="PDB" id="8H01">
    <property type="method" value="EM"/>
    <property type="resolution" value="3.70 A"/>
    <property type="chains" value="A/B/C=1-1208"/>
</dbReference>
<dbReference type="PDB" id="8H06">
    <property type="method" value="EM"/>
    <property type="resolution" value="2.66 A"/>
    <property type="chains" value="B=333-527"/>
</dbReference>
<dbReference type="PDB" id="8H07">
    <property type="method" value="EM"/>
    <property type="resolution" value="2.90 A"/>
    <property type="chains" value="A/B/C=1-1208"/>
</dbReference>
<dbReference type="PDB" id="8H3D">
    <property type="method" value="EM"/>
    <property type="resolution" value="3.27 A"/>
    <property type="chains" value="A/B/C=1-1211"/>
</dbReference>
<dbReference type="PDB" id="8H3E">
    <property type="method" value="EM"/>
    <property type="resolution" value="3.06 A"/>
    <property type="chains" value="A/B/C=1-1211"/>
</dbReference>
<dbReference type="PDB" id="8H5C">
    <property type="method" value="X-ray"/>
    <property type="resolution" value="2.90 A"/>
    <property type="chains" value="B=333-527"/>
</dbReference>
<dbReference type="PDB" id="8H5T">
    <property type="method" value="X-ray"/>
    <property type="resolution" value="2.00 A"/>
    <property type="chains" value="A=320-537"/>
</dbReference>
<dbReference type="PDB" id="8H5U">
    <property type="method" value="X-ray"/>
    <property type="resolution" value="2.40 A"/>
    <property type="chains" value="A/C=320-537"/>
</dbReference>
<dbReference type="PDB" id="8H6F">
    <property type="method" value="EM"/>
    <property type="resolution" value="3.30 A"/>
    <property type="chains" value="A/B/C=1-1208"/>
</dbReference>
<dbReference type="PDB" id="8H7L">
    <property type="method" value="EM"/>
    <property type="resolution" value="2.44 A"/>
    <property type="chains" value="A/B/C=18-1143"/>
</dbReference>
<dbReference type="PDB" id="8H7Z">
    <property type="method" value="EM"/>
    <property type="resolution" value="3.07 A"/>
    <property type="chains" value="A=332-528"/>
</dbReference>
<dbReference type="PDB" id="8H91">
    <property type="method" value="X-ray"/>
    <property type="resolution" value="3.07 A"/>
    <property type="chains" value="A/B=334-527"/>
</dbReference>
<dbReference type="PDB" id="8HC4">
    <property type="method" value="EM"/>
    <property type="resolution" value="3.54 A"/>
    <property type="chains" value="A/B/C=1-1208"/>
</dbReference>
<dbReference type="PDB" id="8HC5">
    <property type="method" value="EM"/>
    <property type="resolution" value="3.43 A"/>
    <property type="chains" value="C=1-676"/>
</dbReference>
<dbReference type="PDB" id="8HC8">
    <property type="method" value="EM"/>
    <property type="resolution" value="3.95 A"/>
    <property type="chains" value="C=332-517"/>
</dbReference>
<dbReference type="PDB" id="8HEB">
    <property type="method" value="EM"/>
    <property type="resolution" value="3.53 A"/>
    <property type="chains" value="A/B/C=1-1208"/>
</dbReference>
<dbReference type="PDB" id="8HEC">
    <property type="method" value="EM"/>
    <property type="resolution" value="3.50 A"/>
    <property type="chains" value="A/B/C=1-1208"/>
</dbReference>
<dbReference type="PDB" id="8HED">
    <property type="method" value="EM"/>
    <property type="resolution" value="3.59 A"/>
    <property type="chains" value="B=331-530"/>
</dbReference>
<dbReference type="PDB" id="8HES">
    <property type="method" value="X-ray"/>
    <property type="resolution" value="2.20 A"/>
    <property type="chains" value="C=322-536"/>
</dbReference>
<dbReference type="PDB" id="8HFY">
    <property type="method" value="EM"/>
    <property type="resolution" value="3.21 A"/>
    <property type="chains" value="B=333-526"/>
</dbReference>
<dbReference type="PDB" id="8HFZ">
    <property type="method" value="EM"/>
    <property type="resolution" value="2.71 A"/>
    <property type="chains" value="A/B/C=1-1217"/>
</dbReference>
<dbReference type="PDB" id="8HG0">
    <property type="method" value="EM"/>
    <property type="resolution" value="3.51 A"/>
    <property type="chains" value="B=333-527"/>
</dbReference>
<dbReference type="PDB" id="8HGL">
    <property type="method" value="EM"/>
    <property type="resolution" value="2.90 A"/>
    <property type="chains" value="A/B/E=1-1208"/>
</dbReference>
<dbReference type="PDB" id="8HGM">
    <property type="method" value="EM"/>
    <property type="resolution" value="3.40 A"/>
    <property type="chains" value="B=1-1208"/>
</dbReference>
<dbReference type="PDB" id="8HHX">
    <property type="method" value="EM"/>
    <property type="resolution" value="3.62 A"/>
    <property type="chains" value="A/B/C=14-1208"/>
</dbReference>
<dbReference type="PDB" id="8HHY">
    <property type="method" value="EM"/>
    <property type="resolution" value="2.77 A"/>
    <property type="chains" value="A/B/C=14-1208"/>
</dbReference>
<dbReference type="PDB" id="8HLC">
    <property type="method" value="EM"/>
    <property type="resolution" value="2.80 A"/>
    <property type="chains" value="A/B/C=1-1273"/>
</dbReference>
<dbReference type="PDB" id="8HLD">
    <property type="method" value="EM"/>
    <property type="resolution" value="2.80 A"/>
    <property type="chains" value="A/B/C=1-1273"/>
</dbReference>
<dbReference type="PDB" id="8HN4">
    <property type="method" value="X-ray"/>
    <property type="resolution" value="2.85 A"/>
    <property type="chains" value="E=1208-1216"/>
</dbReference>
<dbReference type="PDB" id="8HN6">
    <property type="method" value="X-ray"/>
    <property type="resolution" value="2.07 A"/>
    <property type="chains" value="E/F=333-527"/>
</dbReference>
<dbReference type="PDB" id="8HN7">
    <property type="method" value="X-ray"/>
    <property type="resolution" value="3.00 A"/>
    <property type="chains" value="E/F=333-527"/>
</dbReference>
<dbReference type="PDB" id="8HP9">
    <property type="method" value="EM"/>
    <property type="resolution" value="2.75 A"/>
    <property type="chains" value="A/B/C=14-1147"/>
</dbReference>
<dbReference type="PDB" id="8HPF">
    <property type="method" value="EM"/>
    <property type="resolution" value="2.34 A"/>
    <property type="chains" value="A=335-527"/>
</dbReference>
<dbReference type="PDB" id="8HPQ">
    <property type="method" value="EM"/>
    <property type="resolution" value="2.85 A"/>
    <property type="chains" value="A/B/C=14-1147"/>
</dbReference>
<dbReference type="PDB" id="8HPU">
    <property type="method" value="EM"/>
    <property type="resolution" value="2.56 A"/>
    <property type="chains" value="A=334-527"/>
</dbReference>
<dbReference type="PDB" id="8HPV">
    <property type="method" value="EM"/>
    <property type="resolution" value="2.65 A"/>
    <property type="chains" value="A/B/C=14-1147"/>
</dbReference>
<dbReference type="PDB" id="8HQ7">
    <property type="method" value="EM"/>
    <property type="resolution" value="2.70 A"/>
    <property type="chains" value="A=333-527"/>
</dbReference>
<dbReference type="PDB" id="8HQT">
    <property type="method" value="X-ray"/>
    <property type="resolution" value="1.80 A"/>
    <property type="chains" value="B=1268-1273"/>
</dbReference>
<dbReference type="PDB" id="8HR2">
    <property type="method" value="X-ray"/>
    <property type="resolution" value="1.94 A"/>
    <property type="chains" value="A=333-523"/>
</dbReference>
<dbReference type="PDB" id="8HRD">
    <property type="method" value="X-ray"/>
    <property type="resolution" value="2.86 A"/>
    <property type="chains" value="A/B/K/T=319-541"/>
</dbReference>
<dbReference type="PDB" id="8HRK">
    <property type="method" value="EM"/>
    <property type="resolution" value="3.30 A"/>
    <property type="chains" value="E=333-526"/>
</dbReference>
<dbReference type="PDB" id="8HRL">
    <property type="method" value="EM"/>
    <property type="resolution" value="2.80 A"/>
    <property type="chains" value="E=333-526"/>
</dbReference>
<dbReference type="PDB" id="8HSM">
    <property type="method" value="X-ray"/>
    <property type="resolution" value="2.20 A"/>
    <property type="chains" value="C=1052-1060"/>
</dbReference>
<dbReference type="PDB" id="8HSO">
    <property type="method" value="X-ray"/>
    <property type="resolution" value="2.10 A"/>
    <property type="chains" value="C=1052-1060"/>
</dbReference>
<dbReference type="PDB" id="8HSW">
    <property type="method" value="X-ray"/>
    <property type="resolution" value="2.03 A"/>
    <property type="chains" value="C=1053-1060"/>
</dbReference>
<dbReference type="PDB" id="8HT1">
    <property type="method" value="X-ray"/>
    <property type="resolution" value="2.40 A"/>
    <property type="chains" value="C=1053-1060"/>
</dbReference>
<dbReference type="PDB" id="8HT9">
    <property type="method" value="X-ray"/>
    <property type="resolution" value="2.20 A"/>
    <property type="chains" value="C=1053-1060"/>
</dbReference>
<dbReference type="PDB" id="8HWS">
    <property type="method" value="EM"/>
    <property type="resolution" value="2.36 A"/>
    <property type="chains" value="A=333-528"/>
</dbReference>
<dbReference type="PDB" id="8HWT">
    <property type="method" value="EM"/>
    <property type="resolution" value="2.91 A"/>
    <property type="chains" value="A=319-541"/>
</dbReference>
<dbReference type="PDB" id="8HXJ">
    <property type="method" value="EM"/>
    <property type="resolution" value="3.50 A"/>
    <property type="chains" value="A/B/C=1-1208"/>
</dbReference>
<dbReference type="PDB" id="8I3S">
    <property type="method" value="EM"/>
    <property type="resolution" value="3.90 A"/>
    <property type="chains" value="A=14-1213"/>
</dbReference>
<dbReference type="PDB" id="8I3U">
    <property type="method" value="EM"/>
    <property type="resolution" value="3.60 A"/>
    <property type="chains" value="A=14-1213"/>
</dbReference>
<dbReference type="PDB" id="8I4E">
    <property type="method" value="EM"/>
    <property type="resolution" value="3.98 A"/>
    <property type="chains" value="A=28-1208"/>
</dbReference>
<dbReference type="PDB" id="8I4F">
    <property type="method" value="EM"/>
    <property type="resolution" value="3.44 A"/>
    <property type="chains" value="A=28-1208"/>
</dbReference>
<dbReference type="PDB" id="8I4G">
    <property type="method" value="EM"/>
    <property type="resolution" value="3.68 A"/>
    <property type="chains" value="A=28-1208"/>
</dbReference>
<dbReference type="PDB" id="8I5H">
    <property type="method" value="X-ray"/>
    <property type="resolution" value="2.38 A"/>
    <property type="chains" value="A/D/R=334-527"/>
</dbReference>
<dbReference type="PDB" id="8I5I">
    <property type="method" value="X-ray"/>
    <property type="resolution" value="3.06 A"/>
    <property type="chains" value="R=321-536"/>
</dbReference>
<dbReference type="PDB" id="8I9B">
    <property type="method" value="EM"/>
    <property type="resolution" value="3.50 A"/>
    <property type="chains" value="A/B/C=1-1206"/>
</dbReference>
<dbReference type="PDB" id="8I9C">
    <property type="method" value="EM"/>
    <property type="resolution" value="3.85 A"/>
    <property type="chains" value="A/B/C=1-1208"/>
</dbReference>
<dbReference type="PDB" id="8I9D">
    <property type="method" value="EM"/>
    <property type="resolution" value="3.95 A"/>
    <property type="chains" value="A/B/C=1-1208"/>
</dbReference>
<dbReference type="PDB" id="8I9E">
    <property type="method" value="EM"/>
    <property type="resolution" value="3.20 A"/>
    <property type="chains" value="E=319-541"/>
</dbReference>
<dbReference type="PDB" id="8I9F">
    <property type="method" value="EM"/>
    <property type="resolution" value="2.90 A"/>
    <property type="chains" value="E=319-541"/>
</dbReference>
<dbReference type="PDB" id="8I9G">
    <property type="method" value="EM"/>
    <property type="resolution" value="3.20 A"/>
    <property type="chains" value="A=319-541"/>
</dbReference>
<dbReference type="PDB" id="8I9H">
    <property type="method" value="EM"/>
    <property type="resolution" value="3.60 A"/>
    <property type="chains" value="E=319-541"/>
</dbReference>
<dbReference type="PDB" id="8IDN">
    <property type="method" value="EM"/>
    <property type="resolution" value="3.35 A"/>
    <property type="chains" value="A=332-531"/>
</dbReference>
<dbReference type="PDB" id="8IF2">
    <property type="method" value="X-ray"/>
    <property type="resolution" value="2.78 A"/>
    <property type="chains" value="B=322-536"/>
</dbReference>
<dbReference type="PDB" id="8IFY">
    <property type="method" value="EM"/>
    <property type="resolution" value="2.55 A"/>
    <property type="chains" value="A/B/C=28-1145"/>
</dbReference>
<dbReference type="PDB" id="8IFZ">
    <property type="method" value="EM"/>
    <property type="resolution" value="2.85 A"/>
    <property type="chains" value="B=319-541"/>
</dbReference>
<dbReference type="PDB" id="8IOS">
    <property type="method" value="EM"/>
    <property type="resolution" value="2.50 A"/>
    <property type="chains" value="A/B/C=12-1210"/>
</dbReference>
<dbReference type="PDB" id="8IOT">
    <property type="method" value="EM"/>
    <property type="resolution" value="2.51 A"/>
    <property type="chains" value="A/B/C=12-1210"/>
</dbReference>
<dbReference type="PDB" id="8IOU">
    <property type="method" value="EM"/>
    <property type="resolution" value="3.18 A"/>
    <property type="chains" value="A/B/C=12-1210"/>
</dbReference>
<dbReference type="PDB" id="8IOV">
    <property type="method" value="EM"/>
    <property type="resolution" value="3.29 A"/>
    <property type="chains" value="B=12-1210"/>
</dbReference>
<dbReference type="PDB" id="8ITU">
    <property type="method" value="EM"/>
    <property type="resolution" value="3.68 A"/>
    <property type="chains" value="A/B/C=1-1208"/>
</dbReference>
<dbReference type="PDB" id="8IV4">
    <property type="method" value="EM"/>
    <property type="resolution" value="3.59 A"/>
    <property type="chains" value="G=324-527"/>
</dbReference>
<dbReference type="PDB" id="8IV5">
    <property type="method" value="EM"/>
    <property type="resolution" value="3.77 A"/>
    <property type="chains" value="G=324-527"/>
</dbReference>
<dbReference type="PDB" id="8IV8">
    <property type="method" value="EM"/>
    <property type="resolution" value="3.92 A"/>
    <property type="chains" value="G=324-527"/>
</dbReference>
<dbReference type="PDB" id="8IVA">
    <property type="method" value="EM"/>
    <property type="resolution" value="3.95 A"/>
    <property type="chains" value="G=324-527"/>
</dbReference>
<dbReference type="PDB" id="8IX3">
    <property type="method" value="EM"/>
    <property type="resolution" value="3.98 A"/>
    <property type="chains" value="G=333-557"/>
</dbReference>
<dbReference type="PDB" id="8J1Q">
    <property type="method" value="EM"/>
    <property type="resolution" value="3.30 A"/>
    <property type="chains" value="C=319-541"/>
</dbReference>
<dbReference type="PDB" id="8J1T">
    <property type="method" value="EM"/>
    <property type="resolution" value="3.30 A"/>
    <property type="chains" value="F=334-527"/>
</dbReference>
<dbReference type="PDB" id="8J1V">
    <property type="method" value="EM"/>
    <property type="resolution" value="3.01 A"/>
    <property type="chains" value="A/B/E=27-1141"/>
</dbReference>
<dbReference type="PDB" id="8J26">
    <property type="method" value="EM"/>
    <property type="resolution" value="3.40 A"/>
    <property type="chains" value="C=319-541"/>
</dbReference>
<dbReference type="PDB" id="8JAP">
    <property type="method" value="EM"/>
    <property type="resolution" value="3.81 A"/>
    <property type="chains" value="A=1-540"/>
</dbReference>
<dbReference type="PDB" id="8JIN">
    <property type="method" value="EM"/>
    <property type="resolution" value="2.45 A"/>
    <property type="chains" value="A=28-1208"/>
</dbReference>
<dbReference type="PDB" id="8JIO">
    <property type="method" value="EM"/>
    <property type="resolution" value="3.30 A"/>
    <property type="chains" value="A=28-1208"/>
</dbReference>
<dbReference type="PDB" id="8JJE">
    <property type="method" value="EM"/>
    <property type="resolution" value="3.40 A"/>
    <property type="chains" value="B=14-1211"/>
</dbReference>
<dbReference type="PDB" id="8JMM">
    <property type="method" value="EM"/>
    <property type="resolution" value="3.75 A"/>
    <property type="chains" value="A/B/C/D/E/F=28-1208"/>
</dbReference>
<dbReference type="PDB" id="8JYK">
    <property type="method" value="EM"/>
    <property type="resolution" value="2.59 A"/>
    <property type="chains" value="A=28-1210"/>
</dbReference>
<dbReference type="PDB" id="8JYM">
    <property type="method" value="EM"/>
    <property type="resolution" value="2.79 A"/>
    <property type="chains" value="A=28-1210"/>
</dbReference>
<dbReference type="PDB" id="8JYN">
    <property type="method" value="EM"/>
    <property type="resolution" value="3.04 A"/>
    <property type="chains" value="A/B/C=28-1210"/>
</dbReference>
<dbReference type="PDB" id="8JYO">
    <property type="method" value="EM"/>
    <property type="resolution" value="3.20 A"/>
    <property type="chains" value="A/B/C=28-1210"/>
</dbReference>
<dbReference type="PDB" id="8JYP">
    <property type="method" value="EM"/>
    <property type="resolution" value="3.38 A"/>
    <property type="chains" value="A=28-1210"/>
</dbReference>
<dbReference type="PDB" id="8JYS">
    <property type="method" value="EM"/>
    <property type="resolution" value="4.50 A"/>
    <property type="chains" value="B/D=333-528"/>
</dbReference>
<dbReference type="PDB" id="8K18">
    <property type="method" value="EM"/>
    <property type="resolution" value="3.68 A"/>
    <property type="chains" value="E=334-526"/>
</dbReference>
<dbReference type="PDB" id="8K19">
    <property type="method" value="EM"/>
    <property type="resolution" value="3.88 A"/>
    <property type="chains" value="E=334-526"/>
</dbReference>
<dbReference type="PDB" id="8K3K">
    <property type="method" value="X-ray"/>
    <property type="resolution" value="2.43 A"/>
    <property type="chains" value="E=319-531"/>
</dbReference>
<dbReference type="PDB" id="8K46">
    <property type="method" value="EM"/>
    <property type="resolution" value="3.37 A"/>
    <property type="chains" value="A/B/C=1-1208"/>
</dbReference>
<dbReference type="PDB" id="8K47">
    <property type="method" value="EM"/>
    <property type="resolution" value="3.54 A"/>
    <property type="chains" value="A/B/C=1-1208"/>
</dbReference>
<dbReference type="PDB" id="8K5G">
    <property type="method" value="EM"/>
    <property type="resolution" value="3.41 A"/>
    <property type="chains" value="A=325-549"/>
</dbReference>
<dbReference type="PDB" id="8K9B">
    <property type="method" value="EM"/>
    <property type="resolution" value="4.50 A"/>
    <property type="chains" value="C/D/E=1-1208"/>
</dbReference>
<dbReference type="PDB" id="8K9J">
    <property type="method" value="EM"/>
    <property type="resolution" value="6.60 A"/>
    <property type="chains" value="C/D/E=1-1208"/>
</dbReference>
<dbReference type="PDB" id="8K9M">
    <property type="method" value="EM"/>
    <property type="resolution" value="6.80 A"/>
    <property type="chains" value="C/D/E=1-1208"/>
</dbReference>
<dbReference type="PDB" id="8KA8">
    <property type="method" value="EM"/>
    <property type="resolution" value="2.96 A"/>
    <property type="chains" value="E=333-526"/>
</dbReference>
<dbReference type="PDB" id="8KC2">
    <property type="method" value="EM"/>
    <property type="resolution" value="2.60 A"/>
    <property type="chains" value="E=333-526"/>
</dbReference>
<dbReference type="PDB" id="8KDR">
    <property type="method" value="EM"/>
    <property type="resolution" value="3.40 A"/>
    <property type="chains" value="A=14-1208"/>
</dbReference>
<dbReference type="PDB" id="8KEH">
    <property type="method" value="EM"/>
    <property type="resolution" value="3.21 A"/>
    <property type="chains" value="A/B/C=28-1208"/>
</dbReference>
<dbReference type="PDB" id="8KEJ">
    <property type="method" value="EM"/>
    <property type="resolution" value="3.73 A"/>
    <property type="chains" value="A=28-1208"/>
</dbReference>
<dbReference type="PDB" id="8KEQ">
    <property type="method" value="EM"/>
    <property type="resolution" value="3.14 A"/>
    <property type="chains" value="A/B/C=28-1208"/>
</dbReference>
<dbReference type="PDB" id="8KER">
    <property type="method" value="EM"/>
    <property type="resolution" value="2.95 A"/>
    <property type="chains" value="A/B/C=28-1208"/>
</dbReference>
<dbReference type="PDB" id="8KHC">
    <property type="method" value="EM"/>
    <property type="resolution" value="3.00 A"/>
    <property type="chains" value="A/B/C=27-1146"/>
</dbReference>
<dbReference type="PDB" id="8KHD">
    <property type="method" value="EM"/>
    <property type="resolution" value="3.50 A"/>
    <property type="chains" value="C=330-530"/>
</dbReference>
<dbReference type="PDB" id="8OWT">
    <property type="method" value="X-ray"/>
    <property type="resolution" value="2.37 A"/>
    <property type="chains" value="BBB/EEE=330-532"/>
</dbReference>
<dbReference type="PDB" id="8OWV">
    <property type="method" value="X-ray"/>
    <property type="resolution" value="1.73 A"/>
    <property type="chains" value="EEE=331-532"/>
</dbReference>
<dbReference type="PDB" id="8OWW">
    <property type="method" value="X-ray"/>
    <property type="resolution" value="1.97 A"/>
    <property type="chains" value="A=330-531"/>
</dbReference>
<dbReference type="PDB" id="8OYT">
    <property type="method" value="EM"/>
    <property type="resolution" value="3.80 A"/>
    <property type="chains" value="A/B/C=1-1208"/>
</dbReference>
<dbReference type="PDB" id="8OYU">
    <property type="method" value="EM"/>
    <property type="resolution" value="4.00 A"/>
    <property type="chains" value="A/B/C=1-1208"/>
</dbReference>
<dbReference type="PDB" id="8P5M">
    <property type="method" value="EM"/>
    <property type="resolution" value="2.80 A"/>
    <property type="chains" value="I=333-528"/>
</dbReference>
<dbReference type="PDB" id="8P99">
    <property type="method" value="EM"/>
    <property type="resolution" value="3.40 A"/>
    <property type="chains" value="A/B/C=15-1213"/>
</dbReference>
<dbReference type="PDB" id="8P9Y">
    <property type="method" value="EM"/>
    <property type="resolution" value="4.30 A"/>
    <property type="chains" value="A/B/C=15-1213"/>
</dbReference>
<dbReference type="PDB" id="8PQ2">
    <property type="method" value="EM"/>
    <property type="resolution" value="3.85 A"/>
    <property type="chains" value="C=333-527"/>
</dbReference>
<dbReference type="PDB" id="8PSD">
    <property type="method" value="EM"/>
    <property type="resolution" value="2.90 A"/>
    <property type="chains" value="A/B/C=1-1207"/>
</dbReference>
<dbReference type="PDB" id="8Q5Y">
    <property type="method" value="EM"/>
    <property type="resolution" value="2.60 A"/>
    <property type="chains" value="C/D/E=1-1208"/>
</dbReference>
<dbReference type="PDB" id="8Q7S">
    <property type="method" value="X-ray"/>
    <property type="resolution" value="2.70 A"/>
    <property type="chains" value="A/D/G/J/M=334-526"/>
</dbReference>
<dbReference type="PDB" id="8Q93">
    <property type="method" value="X-ray"/>
    <property type="resolution" value="3.10 A"/>
    <property type="chains" value="A=334-526"/>
</dbReference>
<dbReference type="PDB" id="8Q94">
    <property type="method" value="X-ray"/>
    <property type="resolution" value="2.50 A"/>
    <property type="chains" value="A=334-517"/>
</dbReference>
<dbReference type="PDB" id="8Q95">
    <property type="method" value="X-ray"/>
    <property type="resolution" value="1.60 A"/>
    <property type="chains" value="A=334-517"/>
</dbReference>
<dbReference type="PDB" id="8QH0">
    <property type="method" value="X-ray"/>
    <property type="resolution" value="1.87 A"/>
    <property type="chains" value="A=331-528"/>
</dbReference>
<dbReference type="PDB" id="8QPR">
    <property type="method" value="EM"/>
    <property type="resolution" value="3.80 A"/>
    <property type="chains" value="A=1-1208"/>
</dbReference>
<dbReference type="PDB" id="8QRF">
    <property type="method" value="X-ray"/>
    <property type="resolution" value="3.70 A"/>
    <property type="chains" value="E=333-526"/>
</dbReference>
<dbReference type="PDB" id="8QRG">
    <property type="method" value="X-ray"/>
    <property type="resolution" value="2.30 A"/>
    <property type="chains" value="E=333-526"/>
</dbReference>
<dbReference type="PDB" id="8QSQ">
    <property type="method" value="EM"/>
    <property type="resolution" value="3.70 A"/>
    <property type="chains" value="A=332-527"/>
</dbReference>
<dbReference type="PDB" id="8QTD">
    <property type="method" value="EM"/>
    <property type="resolution" value="3.60 A"/>
    <property type="chains" value="A=1-1208"/>
</dbReference>
<dbReference type="PDB" id="8QZR">
    <property type="method" value="X-ray"/>
    <property type="resolution" value="3.77 A"/>
    <property type="chains" value="C/E=333-526"/>
</dbReference>
<dbReference type="PDB" id="8R1C">
    <property type="method" value="EM"/>
    <property type="resolution" value="2.20 A"/>
    <property type="chains" value="A/B/C=1-1208"/>
</dbReference>
<dbReference type="PDB" id="8R1D">
    <property type="method" value="EM"/>
    <property type="resolution" value="2.37 A"/>
    <property type="chains" value="A/B/C=1-1208"/>
</dbReference>
<dbReference type="PDB" id="8R80">
    <property type="method" value="X-ray"/>
    <property type="resolution" value="4.03 A"/>
    <property type="chains" value="E/R=333-526"/>
</dbReference>
<dbReference type="PDB" id="8R87">
    <property type="method" value="EM"/>
    <property type="resolution" value="3.00 A"/>
    <property type="chains" value="A/B/C=1-331, A/B/C=514-1208"/>
</dbReference>
<dbReference type="PDB" id="8R8K">
    <property type="method" value="EM"/>
    <property type="resolution" value="3.41 A"/>
    <property type="chains" value="A=1-1195"/>
</dbReference>
<dbReference type="PDB" id="8RBU">
    <property type="method" value="X-ray"/>
    <property type="resolution" value="2.70 A"/>
    <property type="chains" value="C=975-984"/>
</dbReference>
<dbReference type="PDB" id="8RBV">
    <property type="method" value="X-ray"/>
    <property type="resolution" value="1.80 A"/>
    <property type="chains" value="C=976-984"/>
</dbReference>
<dbReference type="PDB" id="8RBY">
    <property type="method" value="X-ray"/>
    <property type="resolution" value="1.90 A"/>
    <property type="chains" value="A=332-528"/>
</dbReference>
<dbReference type="PDB" id="8RCV">
    <property type="method" value="X-ray"/>
    <property type="resolution" value="1.65 A"/>
    <property type="chains" value="C=975-984"/>
</dbReference>
<dbReference type="PDB" id="8REF">
    <property type="method" value="X-ray"/>
    <property type="resolution" value="1.90 A"/>
    <property type="chains" value="C=975-984"/>
</dbReference>
<dbReference type="PDB" id="8RH6">
    <property type="method" value="X-ray"/>
    <property type="resolution" value="3.32 A"/>
    <property type="chains" value="G/H/I=975-984"/>
</dbReference>
<dbReference type="PDB" id="8RHQ">
    <property type="method" value="X-ray"/>
    <property type="resolution" value="2.00 A"/>
    <property type="chains" value="G/H/I=975-984"/>
</dbReference>
<dbReference type="PDB" id="8RJ5">
    <property type="method" value="X-ray"/>
    <property type="resolution" value="3.02 A"/>
    <property type="chains" value="C/H=448-456"/>
</dbReference>
<dbReference type="PDB" id="8RJ7">
    <property type="method" value="X-ray"/>
    <property type="resolution" value="2.10 A"/>
    <property type="chains" value="A/C/E/G/I=332-528"/>
</dbReference>
<dbReference type="PDB" id="8RJH">
    <property type="method" value="X-ray"/>
    <property type="resolution" value="2.60 A"/>
    <property type="chains" value="C/F/I/L/O/R=448-456"/>
</dbReference>
<dbReference type="PDB" id="8RJI">
    <property type="method" value="X-ray"/>
    <property type="resolution" value="2.30 A"/>
    <property type="chains" value="C/F/I/L=448-456"/>
</dbReference>
<dbReference type="PDB" id="8RRN">
    <property type="method" value="X-ray"/>
    <property type="resolution" value="3.11 A"/>
    <property type="chains" value="A/B=334-527"/>
</dbReference>
<dbReference type="PDB" id="8S6M">
    <property type="method" value="X-ray"/>
    <property type="resolution" value="1.67 A"/>
    <property type="chains" value="R=328-531"/>
</dbReference>
<dbReference type="PDB" id="8S9G">
    <property type="method" value="EM"/>
    <property type="resolution" value="3.00 A"/>
    <property type="chains" value="E=328-529"/>
</dbReference>
<dbReference type="PDB" id="8SDF">
    <property type="method" value="X-ray"/>
    <property type="resolution" value="1.79 A"/>
    <property type="chains" value="A/Z=333-530"/>
</dbReference>
<dbReference type="PDB" id="8SDG">
    <property type="method" value="X-ray"/>
    <property type="resolution" value="2.71 A"/>
    <property type="chains" value="C/D=333-530"/>
</dbReference>
<dbReference type="PDB" id="8SDH">
    <property type="method" value="X-ray"/>
    <property type="resolution" value="2.84 A"/>
    <property type="chains" value="A/B=333-530"/>
</dbReference>
<dbReference type="PDB" id="8SGU">
    <property type="method" value="X-ray"/>
    <property type="resolution" value="1.95 A"/>
    <property type="chains" value="A=331-527"/>
</dbReference>
<dbReference type="PDB" id="8SIQ">
    <property type="method" value="X-ray"/>
    <property type="resolution" value="2.50 A"/>
    <property type="chains" value="A=333-530"/>
</dbReference>
<dbReference type="PDB" id="8SIR">
    <property type="method" value="X-ray"/>
    <property type="resolution" value="3.30 A"/>
    <property type="chains" value="A=333-530"/>
</dbReference>
<dbReference type="PDB" id="8SIS">
    <property type="method" value="X-ray"/>
    <property type="resolution" value="3.08 A"/>
    <property type="chains" value="A=333-530"/>
</dbReference>
<dbReference type="PDB" id="8SIT">
    <property type="method" value="X-ray"/>
    <property type="resolution" value="2.91 A"/>
    <property type="chains" value="A/B/C/D=333-530"/>
</dbReference>
<dbReference type="PDB" id="8SK5">
    <property type="method" value="X-ray"/>
    <property type="resolution" value="2.01 A"/>
    <property type="chains" value="A=319-541"/>
</dbReference>
<dbReference type="PDB" id="8SMI">
    <property type="method" value="X-ray"/>
    <property type="resolution" value="3.50 A"/>
    <property type="chains" value="A=331-527"/>
</dbReference>
<dbReference type="PDB" id="8SMT">
    <property type="method" value="X-ray"/>
    <property type="resolution" value="3.16 A"/>
    <property type="chains" value="C/E/G/K=331-527"/>
</dbReference>
<dbReference type="PDB" id="8SUO">
    <property type="method" value="X-ray"/>
    <property type="resolution" value="3.30 A"/>
    <property type="chains" value="A=333-527"/>
</dbReference>
<dbReference type="PDB" id="8SWH">
    <property type="method" value="EM"/>
    <property type="resolution" value="3.88 A"/>
    <property type="chains" value="A=1-1208"/>
</dbReference>
<dbReference type="PDB" id="8T20">
    <property type="method" value="EM"/>
    <property type="resolution" value="3.36 A"/>
    <property type="chains" value="A/B/C=1-1208"/>
</dbReference>
<dbReference type="PDB" id="8T22">
    <property type="method" value="EM"/>
    <property type="resolution" value="3.83 A"/>
    <property type="chains" value="A/B/C=1-1208"/>
</dbReference>
<dbReference type="PDB" id="8T23">
    <property type="method" value="EM"/>
    <property type="resolution" value="3.87 A"/>
    <property type="chains" value="B=321-528"/>
</dbReference>
<dbReference type="PDB" id="8T25">
    <property type="method" value="EM"/>
    <property type="resolution" value="3.62 A"/>
    <property type="chains" value="B=321-528"/>
</dbReference>
<dbReference type="PDB" id="8TAZ">
    <property type="method" value="EM"/>
    <property type="resolution" value="3.75 A"/>
    <property type="chains" value="A/B/C=1-1208"/>
</dbReference>
<dbReference type="PDB" id="8THF">
    <property type="method" value="EM"/>
    <property type="resolution" value="2.83 A"/>
    <property type="chains" value="A/B/C=14-327, A/B/C=525-1211"/>
</dbReference>
<dbReference type="PDB" id="8TM1">
    <property type="method" value="EM"/>
    <property type="resolution" value="2.79 A"/>
    <property type="chains" value="A/B=1-1208"/>
</dbReference>
<dbReference type="PDB" id="8TMA">
    <property type="method" value="EM"/>
    <property type="resolution" value="3.20 A"/>
    <property type="chains" value="A=1-1208"/>
</dbReference>
<dbReference type="PDB" id="8TMY">
    <property type="method" value="X-ray"/>
    <property type="resolution" value="3.07 A"/>
    <property type="chains" value="M/N/S=1140-1164"/>
</dbReference>
<dbReference type="PDB" id="8TYL">
    <property type="method" value="EM"/>
    <property type="resolution" value="2.85 A"/>
    <property type="chains" value="A/B/C=14-1211"/>
</dbReference>
<dbReference type="PDB" id="8TYO">
    <property type="method" value="EM"/>
    <property type="resolution" value="2.75 A"/>
    <property type="chains" value="A/B/C=19-1211"/>
</dbReference>
<dbReference type="PDB" id="8U1G">
    <property type="method" value="X-ray"/>
    <property type="resolution" value="3.20 A"/>
    <property type="chains" value="A/B=697-1141"/>
</dbReference>
<dbReference type="PDB" id="8U28">
    <property type="method" value="EM"/>
    <property type="resolution" value="3.10 A"/>
    <property type="chains" value="A/B/C=1-1273"/>
</dbReference>
<dbReference type="PDB" id="8UG9">
    <property type="method" value="EM"/>
    <property type="resolution" value="3.49 A"/>
    <property type="chains" value="A/B/C=14-1211"/>
</dbReference>
<dbReference type="PDB" id="8UIR">
    <property type="method" value="EM"/>
    <property type="resolution" value="3.20 A"/>
    <property type="chains" value="A/B/C=1-1208"/>
</dbReference>
<dbReference type="PDB" id="8UK1">
    <property type="method" value="EM"/>
    <property type="resolution" value="3.00 A"/>
    <property type="chains" value="A/B/C=1-1208"/>
</dbReference>
<dbReference type="PDB" id="8UKD">
    <property type="method" value="EM"/>
    <property type="resolution" value="2.90 A"/>
    <property type="chains" value="A/B/C=1-1208"/>
</dbReference>
<dbReference type="PDB" id="8UKF">
    <property type="method" value="EM"/>
    <property type="resolution" value="3.10 A"/>
    <property type="chains" value="A/B/C=1-1208"/>
</dbReference>
<dbReference type="PDB" id="8USZ">
    <property type="method" value="EM"/>
    <property type="resolution" value="2.98 A"/>
    <property type="chains" value="A/B/C=16-1273"/>
</dbReference>
<dbReference type="PDB" id="8UUL">
    <property type="method" value="EM"/>
    <property type="resolution" value="3.20 A"/>
    <property type="chains" value="A/B/C=1-1211"/>
</dbReference>
<dbReference type="PDB" id="8UUM">
    <property type="method" value="EM"/>
    <property type="resolution" value="3.90 A"/>
    <property type="chains" value="A/B/C=1-1211"/>
</dbReference>
<dbReference type="PDB" id="8UUN">
    <property type="method" value="EM"/>
    <property type="resolution" value="3.80 A"/>
    <property type="chains" value="A/B/C=1-1211"/>
</dbReference>
<dbReference type="PDB" id="8UUO">
    <property type="method" value="EM"/>
    <property type="resolution" value="3.90 A"/>
    <property type="chains" value="A/B/C=1-1211"/>
</dbReference>
<dbReference type="PDB" id="8V0L">
    <property type="method" value="EM"/>
    <property type="resolution" value="3.00 A"/>
    <property type="chains" value="A/B/C=1-1208"/>
</dbReference>
<dbReference type="PDB" id="8V0M">
    <property type="method" value="EM"/>
    <property type="resolution" value="3.20 A"/>
    <property type="chains" value="A/B/C=1-1208"/>
</dbReference>
<dbReference type="PDB" id="8V0N">
    <property type="method" value="EM"/>
    <property type="resolution" value="3.40 A"/>
    <property type="chains" value="A/B/C=1-1208"/>
</dbReference>
<dbReference type="PDB" id="8V0O">
    <property type="method" value="EM"/>
    <property type="resolution" value="3.30 A"/>
    <property type="chains" value="A/B/C=1-1208"/>
</dbReference>
<dbReference type="PDB" id="8V0P">
    <property type="method" value="EM"/>
    <property type="resolution" value="3.30 A"/>
    <property type="chains" value="A/B/C=1-1208"/>
</dbReference>
<dbReference type="PDB" id="8V0Q">
    <property type="method" value="EM"/>
    <property type="resolution" value="3.90 A"/>
    <property type="chains" value="A/B/C=1-1208"/>
</dbReference>
<dbReference type="PDB" id="8V0R">
    <property type="method" value="EM"/>
    <property type="resolution" value="3.00 A"/>
    <property type="chains" value="A/B/C=1-1208"/>
</dbReference>
<dbReference type="PDB" id="8V0S">
    <property type="method" value="EM"/>
    <property type="resolution" value="3.30 A"/>
    <property type="chains" value="A/B/C=1-1208"/>
</dbReference>
<dbReference type="PDB" id="8V0T">
    <property type="method" value="EM"/>
    <property type="resolution" value="3.10 A"/>
    <property type="chains" value="A/B/C=1-1208"/>
</dbReference>
<dbReference type="PDB" id="8V0U">
    <property type="method" value="EM"/>
    <property type="resolution" value="3.30 A"/>
    <property type="chains" value="A/B/C=1-1208"/>
</dbReference>
<dbReference type="PDB" id="8V0V">
    <property type="method" value="EM"/>
    <property type="resolution" value="3.10 A"/>
    <property type="chains" value="A/B/C=1-1208"/>
</dbReference>
<dbReference type="PDB" id="8V0W">
    <property type="method" value="EM"/>
    <property type="resolution" value="3.30 A"/>
    <property type="chains" value="A/B/C=1-1208"/>
</dbReference>
<dbReference type="PDB" id="8V0X">
    <property type="method" value="EM"/>
    <property type="resolution" value="3.30 A"/>
    <property type="chains" value="A/B/C=1-1208"/>
</dbReference>
<dbReference type="PDB" id="8V4F">
    <property type="method" value="EM"/>
    <property type="resolution" value="2.68 A"/>
    <property type="chains" value="A=334-526"/>
</dbReference>
<dbReference type="PDB" id="8V5V">
    <property type="method" value="EM"/>
    <property type="resolution" value="2.93 A"/>
    <property type="chains" value="E/F/G=691-1211"/>
</dbReference>
<dbReference type="PDB" id="8VAO">
    <property type="method" value="EM"/>
    <property type="resolution" value="2.80 A"/>
    <property type="chains" value="A/B/C=697-1208"/>
</dbReference>
<dbReference type="PDB" id="8VCR">
    <property type="method" value="EM"/>
    <property type="resolution" value="3.00 A"/>
    <property type="chains" value="A/B/C=697-1208"/>
</dbReference>
<dbReference type="PDB" id="8VIF">
    <property type="method" value="EM"/>
    <property type="resolution" value="3.10 A"/>
    <property type="chains" value="R=1-1208"/>
</dbReference>
<dbReference type="PDB" id="8VKE">
    <property type="method" value="EM"/>
    <property type="resolution" value="3.10 A"/>
    <property type="chains" value="C/R=1-1208"/>
</dbReference>
<dbReference type="PDB" id="8VKK">
    <property type="method" value="EM"/>
    <property type="resolution" value="2.81 A"/>
    <property type="chains" value="A/B/C=1-1207"/>
</dbReference>
<dbReference type="PDB" id="8VKL">
    <property type="method" value="EM"/>
    <property type="resolution" value="2.91 A"/>
    <property type="chains" value="A/B/C=1-1207"/>
</dbReference>
<dbReference type="PDB" id="8VKM">
    <property type="method" value="EM"/>
    <property type="resolution" value="2.83 A"/>
    <property type="chains" value="A/B/C=1-1207"/>
</dbReference>
<dbReference type="PDB" id="8VKN">
    <property type="method" value="EM"/>
    <property type="resolution" value="2.93 A"/>
    <property type="chains" value="A=330-527"/>
</dbReference>
<dbReference type="PDB" id="8VKO">
    <property type="method" value="EM"/>
    <property type="resolution" value="2.68 A"/>
    <property type="chains" value="A/B/C=1-1207"/>
</dbReference>
<dbReference type="PDB" id="8VKP">
    <property type="method" value="EM"/>
    <property type="resolution" value="2.77 A"/>
    <property type="chains" value="A=330-527"/>
</dbReference>
<dbReference type="PDB" id="8VQ9">
    <property type="method" value="EM"/>
    <property type="resolution" value="2.70 A"/>
    <property type="chains" value="A/B/C=686-1208"/>
</dbReference>
<dbReference type="PDB" id="8VQA">
    <property type="method" value="EM"/>
    <property type="resolution" value="3.50 A"/>
    <property type="chains" value="A/B/C=686-1208"/>
</dbReference>
<dbReference type="PDB" id="8VQB">
    <property type="method" value="EM"/>
    <property type="resolution" value="3.00 A"/>
    <property type="chains" value="A/B/C=686-1208"/>
</dbReference>
<dbReference type="PDB" id="8VQR">
    <property type="method" value="X-ray"/>
    <property type="resolution" value="2.56 A"/>
    <property type="chains" value="E/F=319-536"/>
</dbReference>
<dbReference type="PDB" id="8VYA">
    <property type="method" value="X-ray"/>
    <property type="resolution" value="2.12 A"/>
    <property type="chains" value="A/B/C=912-966, D/E/F=1168-1203"/>
</dbReference>
<dbReference type="PDB" id="8VYE">
    <property type="method" value="EM"/>
    <property type="resolution" value="2.70 A"/>
    <property type="chains" value="E/K/O=1-1208"/>
</dbReference>
<dbReference type="PDB" id="8VYF">
    <property type="method" value="EM"/>
    <property type="resolution" value="3.20 A"/>
    <property type="chains" value="A=1-1208"/>
</dbReference>
<dbReference type="PDB" id="8VYG">
    <property type="method" value="EM"/>
    <property type="resolution" value="3.10 A"/>
    <property type="chains" value="R=1-1208"/>
</dbReference>
<dbReference type="PDB" id="8W4F">
    <property type="method" value="EM"/>
    <property type="resolution" value="4.20 A"/>
    <property type="chains" value="A/B/C=27-1146"/>
</dbReference>
<dbReference type="PDB" id="8WDR">
    <property type="method" value="X-ray"/>
    <property type="resolution" value="3.47 A"/>
    <property type="chains" value="B/D=319-541"/>
</dbReference>
<dbReference type="PDB" id="8WDS">
    <property type="method" value="X-ray"/>
    <property type="resolution" value="3.40 A"/>
    <property type="chains" value="B/D=319-541"/>
</dbReference>
<dbReference type="PDB" id="8WDY">
    <property type="method" value="EM"/>
    <property type="resolution" value="2.69 A"/>
    <property type="chains" value="B=319-541"/>
</dbReference>
<dbReference type="PDB" id="8WDZ">
    <property type="method" value="EM"/>
    <property type="resolution" value="2.71 A"/>
    <property type="chains" value="B=319-540"/>
</dbReference>
<dbReference type="PDB" id="8WE0">
    <property type="method" value="EM"/>
    <property type="resolution" value="2.80 A"/>
    <property type="chains" value="B=319-541"/>
</dbReference>
<dbReference type="PDB" id="8WE1">
    <property type="method" value="EM"/>
    <property type="resolution" value="2.47 A"/>
    <property type="chains" value="B=319-541"/>
</dbReference>
<dbReference type="PDB" id="8WE4">
    <property type="method" value="EM"/>
    <property type="resolution" value="2.91 A"/>
    <property type="chains" value="B=319-541"/>
</dbReference>
<dbReference type="PDB" id="8WFH">
    <property type="method" value="X-ray"/>
    <property type="resolution" value="2.72 A"/>
    <property type="chains" value="A=333-530"/>
</dbReference>
<dbReference type="PDB" id="8WFM">
    <property type="method" value="X-ray"/>
    <property type="resolution" value="2.99 A"/>
    <property type="chains" value="B/D/F/H=319-541"/>
</dbReference>
<dbReference type="PDB" id="8WGV">
    <property type="method" value="EM"/>
    <property type="resolution" value="2.92 A"/>
    <property type="chains" value="A/B/C=1-1208"/>
</dbReference>
<dbReference type="PDB" id="8WGW">
    <property type="method" value="EM"/>
    <property type="resolution" value="2.90 A"/>
    <property type="chains" value="A=1-1208"/>
</dbReference>
<dbReference type="PDB" id="8WHS">
    <property type="method" value="EM"/>
    <property type="resolution" value="3.33 A"/>
    <property type="chains" value="A/B/C=28-1208"/>
</dbReference>
<dbReference type="PDB" id="8WHU">
    <property type="method" value="EM"/>
    <property type="resolution" value="3.30 A"/>
    <property type="chains" value="A/B/C=28-1208"/>
</dbReference>
<dbReference type="PDB" id="8WHV">
    <property type="method" value="EM"/>
    <property type="resolution" value="3.32 A"/>
    <property type="chains" value="A/B/C=28-1208"/>
</dbReference>
<dbReference type="PDB" id="8WHW">
    <property type="method" value="EM"/>
    <property type="resolution" value="3.85 A"/>
    <property type="chains" value="A/B/C=28-1208"/>
</dbReference>
<dbReference type="PDB" id="8WHZ">
    <property type="method" value="EM"/>
    <property type="resolution" value="3.93 A"/>
    <property type="chains" value="B=333-527"/>
</dbReference>
<dbReference type="PDB" id="8WLO">
    <property type="method" value="EM"/>
    <property type="resolution" value="2.62 A"/>
    <property type="chains" value="A/B/C=1-1217"/>
</dbReference>
<dbReference type="PDB" id="8WLR">
    <property type="method" value="EM"/>
    <property type="resolution" value="3.12 A"/>
    <property type="chains" value="B=1-1217"/>
</dbReference>
<dbReference type="PDB" id="8WMD">
    <property type="method" value="EM"/>
    <property type="resolution" value="2.71 A"/>
    <property type="chains" value="A=12-1210"/>
</dbReference>
<dbReference type="PDB" id="8WMF">
    <property type="method" value="EM"/>
    <property type="resolution" value="2.51 A"/>
    <property type="chains" value="A=12-1210"/>
</dbReference>
<dbReference type="PDB" id="8WOX">
    <property type="method" value="EM"/>
    <property type="resolution" value="2.75 A"/>
    <property type="chains" value="B=319-541"/>
</dbReference>
<dbReference type="PDB" id="8WOY">
    <property type="method" value="EM"/>
    <property type="resolution" value="3.14 A"/>
    <property type="chains" value="B=319-539"/>
</dbReference>
<dbReference type="PDB" id="8WP8">
    <property type="method" value="EM"/>
    <property type="resolution" value="2.89 A"/>
    <property type="chains" value="B=319-541"/>
</dbReference>
<dbReference type="PDB" id="8WPW">
    <property type="method" value="EM"/>
    <property type="resolution" value="2.49 A"/>
    <property type="chains" value="R=319-541"/>
</dbReference>
<dbReference type="PDB" id="8WPY">
    <property type="method" value="EM"/>
    <property type="resolution" value="3.02 A"/>
    <property type="chains" value="R=319-541"/>
</dbReference>
<dbReference type="PDB" id="8WRH">
    <property type="method" value="EM"/>
    <property type="resolution" value="3.08 A"/>
    <property type="chains" value="B=334-529"/>
</dbReference>
<dbReference type="PDB" id="8WRL">
    <property type="method" value="EM"/>
    <property type="resolution" value="3.36 A"/>
    <property type="chains" value="B=334-529"/>
</dbReference>
<dbReference type="PDB" id="8WRM">
    <property type="method" value="EM"/>
    <property type="resolution" value="4.34 A"/>
    <property type="chains" value="C/F/G=1-1140"/>
</dbReference>
<dbReference type="PDB" id="8WRO">
    <property type="method" value="EM"/>
    <property type="resolution" value="3.90 A"/>
    <property type="chains" value="A/B/C=1-1216"/>
</dbReference>
<dbReference type="PDB" id="8WTD">
    <property type="method" value="EM"/>
    <property type="resolution" value="3.06 A"/>
    <property type="chains" value="B=334-534"/>
</dbReference>
<dbReference type="PDB" id="8WTJ">
    <property type="method" value="EM"/>
    <property type="resolution" value="4.64 A"/>
    <property type="chains" value="A/B/C=1-1216"/>
</dbReference>
<dbReference type="PDB" id="8WXL">
    <property type="method" value="EM"/>
    <property type="resolution" value="2.59 A"/>
    <property type="chains" value="A=28-1210"/>
</dbReference>
<dbReference type="PDB" id="8WYH">
    <property type="method" value="EM"/>
    <property type="resolution" value="3.00 A"/>
    <property type="chains" value="A/B/C=17-1147"/>
</dbReference>
<dbReference type="PDB" id="8WYJ">
    <property type="method" value="EM"/>
    <property type="resolution" value="3.10 A"/>
    <property type="chains" value="A/B/C=17-1147"/>
</dbReference>
<dbReference type="PDB" id="8WZI">
    <property type="method" value="EM"/>
    <property type="resolution" value="3.00 A"/>
    <property type="chains" value="A/B/C=1-1213"/>
</dbReference>
<dbReference type="PDB" id="8X0X">
    <property type="method" value="X-ray"/>
    <property type="resolution" value="3.45 A"/>
    <property type="chains" value="A/E=334-528"/>
</dbReference>
<dbReference type="PDB" id="8X0Y">
    <property type="method" value="X-ray"/>
    <property type="resolution" value="1.94 A"/>
    <property type="chains" value="A/B=333-528"/>
</dbReference>
<dbReference type="PDB" id="8X4H">
    <property type="method" value="EM"/>
    <property type="resolution" value="3.65 A"/>
    <property type="chains" value="A/B/C=1-1208"/>
</dbReference>
<dbReference type="PDB" id="8X4Z">
    <property type="method" value="EM"/>
    <property type="resolution" value="3.49 A"/>
    <property type="chains" value="A/B/C=1-1208"/>
</dbReference>
<dbReference type="PDB" id="8X50">
    <property type="method" value="EM"/>
    <property type="resolution" value="3.82 A"/>
    <property type="chains" value="A/B/C=1-1208"/>
</dbReference>
<dbReference type="PDB" id="8X55">
    <property type="method" value="EM"/>
    <property type="resolution" value="3.75 A"/>
    <property type="chains" value="A/B/C=1-1208"/>
</dbReference>
<dbReference type="PDB" id="8X56">
    <property type="method" value="EM"/>
    <property type="resolution" value="3.93 A"/>
    <property type="chains" value="A/B/C=1-1208"/>
</dbReference>
<dbReference type="PDB" id="8X5Q">
    <property type="method" value="EM"/>
    <property type="resolution" value="3.47 A"/>
    <property type="chains" value="A/B/C=1-1273"/>
</dbReference>
<dbReference type="PDB" id="8X5R">
    <property type="method" value="EM"/>
    <property type="resolution" value="3.72 A"/>
    <property type="chains" value="A/B/C=1-1273"/>
</dbReference>
<dbReference type="PDB" id="8XAL">
    <property type="method" value="EM"/>
    <property type="resolution" value="3.20 A"/>
    <property type="chains" value="A/B/C=1-1208"/>
</dbReference>
<dbReference type="PDB" id="8XBF">
    <property type="method" value="EM"/>
    <property type="resolution" value="3.60 A"/>
    <property type="chains" value="A/B/C=1-1208"/>
</dbReference>
<dbReference type="PDB" id="8XE9">
    <property type="method" value="EM"/>
    <property type="resolution" value="3.30 A"/>
    <property type="chains" value="C=334-529"/>
</dbReference>
<dbReference type="PDB" id="8XEA">
    <property type="method" value="EM"/>
    <property type="resolution" value="3.42 A"/>
    <property type="chains" value="D/E/F=1-1140"/>
</dbReference>
<dbReference type="PDB" id="8XEF">
    <property type="method" value="EM"/>
    <property type="resolution" value="4.41 A"/>
    <property type="chains" value="A=334-528"/>
</dbReference>
<dbReference type="PDB" id="8XG2">
    <property type="method" value="X-ray"/>
    <property type="resolution" value="1.84 A"/>
    <property type="chains" value="C=340-351"/>
</dbReference>
<dbReference type="PDB" id="8XI6">
    <property type="method" value="EM"/>
    <property type="resolution" value="2.30 A"/>
    <property type="chains" value="A/B/C=1-1213"/>
</dbReference>
<dbReference type="PDB" id="8XK2">
    <property type="method" value="X-ray"/>
    <property type="resolution" value="3.40 A"/>
    <property type="chains" value="A/C/E/G=319-531"/>
</dbReference>
<dbReference type="PDB" id="8XKC">
    <property type="method" value="X-ray"/>
    <property type="resolution" value="2.18 A"/>
    <property type="chains" value="C=361-369"/>
</dbReference>
<dbReference type="PDB" id="8XKE">
    <property type="method" value="X-ray"/>
    <property type="resolution" value="1.92 A"/>
    <property type="chains" value="M=340-351"/>
</dbReference>
<dbReference type="PDB" id="8XKI">
    <property type="method" value="EM"/>
    <property type="resolution" value="3.20 A"/>
    <property type="chains" value="A/B/C=1-1208"/>
</dbReference>
<dbReference type="PDB" id="8XLM">
    <property type="method" value="EM"/>
    <property type="resolution" value="3.22 A"/>
    <property type="chains" value="A/B/C=12-1210"/>
</dbReference>
<dbReference type="PDB" id="8XLN">
    <property type="method" value="EM"/>
    <property type="resolution" value="3.78 A"/>
    <property type="chains" value="A=12-1210"/>
</dbReference>
<dbReference type="PDB" id="8XLV">
    <property type="method" value="EM"/>
    <property type="resolution" value="3.07 A"/>
    <property type="chains" value="A/B/C=28-1147"/>
</dbReference>
<dbReference type="PDB" id="8XM5">
    <property type="method" value="EM"/>
    <property type="resolution" value="2.61 A"/>
    <property type="chains" value="A/B/C=28-1208"/>
</dbReference>
<dbReference type="PDB" id="8XMG">
    <property type="method" value="EM"/>
    <property type="resolution" value="2.90 A"/>
    <property type="chains" value="A/B/C=28-1208"/>
</dbReference>
<dbReference type="PDB" id="8XMT">
    <property type="method" value="EM"/>
    <property type="resolution" value="3.31 A"/>
    <property type="chains" value="A/B/C=16-1207"/>
</dbReference>
<dbReference type="PDB" id="8XN2">
    <property type="method" value="EM"/>
    <property type="resolution" value="2.79 A"/>
    <property type="chains" value="B=319-541"/>
</dbReference>
<dbReference type="PDB" id="8XN3">
    <property type="method" value="EM"/>
    <property type="resolution" value="2.64 A"/>
    <property type="chains" value="B=319-541"/>
</dbReference>
<dbReference type="PDB" id="8XN5">
    <property type="method" value="EM"/>
    <property type="resolution" value="2.87 A"/>
    <property type="chains" value="B/C/D=16-1207"/>
</dbReference>
<dbReference type="PDB" id="8XNF">
    <property type="method" value="EM"/>
    <property type="resolution" value="3.26 A"/>
    <property type="chains" value="B/C/D=28-1147"/>
</dbReference>
<dbReference type="PDB" id="8XNK">
    <property type="method" value="EM"/>
    <property type="resolution" value="2.78 A"/>
    <property type="chains" value="B/C/D=28-1208"/>
</dbReference>
<dbReference type="PDB" id="8XRQ">
    <property type="method" value="EM"/>
    <property type="resolution" value="4.19 A"/>
    <property type="chains" value="A=319-541"/>
</dbReference>
<dbReference type="PDB" id="8XSD">
    <property type="method" value="EM"/>
    <property type="resolution" value="3.55 A"/>
    <property type="chains" value="A/B/C=1-1213"/>
</dbReference>
<dbReference type="PDB" id="8XSE">
    <property type="method" value="EM"/>
    <property type="resolution" value="2.50 A"/>
    <property type="chains" value="A=319-527"/>
</dbReference>
<dbReference type="PDB" id="8XSF">
    <property type="method" value="EM"/>
    <property type="resolution" value="2.16 A"/>
    <property type="chains" value="B=319-527"/>
</dbReference>
<dbReference type="PDB" id="8XSI">
    <property type="method" value="EM"/>
    <property type="resolution" value="2.10 A"/>
    <property type="chains" value="B=319-527"/>
</dbReference>
<dbReference type="PDB" id="8XSJ">
    <property type="method" value="EM"/>
    <property type="resolution" value="2.61 A"/>
    <property type="chains" value="B=319-541"/>
</dbReference>
<dbReference type="PDB" id="8XSL">
    <property type="method" value="EM"/>
    <property type="resolution" value="3.20 A"/>
    <property type="chains" value="A/B/C=1-1273"/>
</dbReference>
<dbReference type="PDB" id="8XUR">
    <property type="method" value="EM"/>
    <property type="resolution" value="3.85 A"/>
    <property type="chains" value="A/B/C=1-1208"/>
</dbReference>
<dbReference type="PDB" id="8XUS">
    <property type="method" value="EM"/>
    <property type="resolution" value="3.18 A"/>
    <property type="chains" value="A/B/C=1-1208"/>
</dbReference>
<dbReference type="PDB" id="8XUT">
    <property type="method" value="EM"/>
    <property type="resolution" value="3.20 A"/>
    <property type="chains" value="A/B/C=1-1273"/>
</dbReference>
<dbReference type="PDB" id="8XUU">
    <property type="method" value="EM"/>
    <property type="resolution" value="3.69 A"/>
    <property type="chains" value="A=1-1208"/>
</dbReference>
<dbReference type="PDB" id="8XUX">
    <property type="method" value="EM"/>
    <property type="resolution" value="3.22 A"/>
    <property type="chains" value="A/B/C=28-1210"/>
</dbReference>
<dbReference type="PDB" id="8XUY">
    <property type="method" value="EM"/>
    <property type="resolution" value="3.14 A"/>
    <property type="chains" value="A/B/C=28-1210"/>
</dbReference>
<dbReference type="PDB" id="8XUZ">
    <property type="method" value="EM"/>
    <property type="resolution" value="3.05 A"/>
    <property type="chains" value="A/B/C=28-1210"/>
</dbReference>
<dbReference type="PDB" id="8XV0">
    <property type="method" value="EM"/>
    <property type="resolution" value="3.00 A"/>
    <property type="chains" value="B=28-1210"/>
</dbReference>
<dbReference type="PDB" id="8XV1">
    <property type="method" value="EM"/>
    <property type="resolution" value="3.05 A"/>
    <property type="chains" value="A=28-1210"/>
</dbReference>
<dbReference type="PDB" id="8XVM">
    <property type="method" value="EM"/>
    <property type="resolution" value="2.77 A"/>
    <property type="chains" value="A=28-1210"/>
</dbReference>
<dbReference type="PDB" id="8XXW">
    <property type="method" value="EM"/>
    <property type="resolution" value="3.03 A"/>
    <property type="chains" value="E=336-515"/>
</dbReference>
<dbReference type="PDB" id="8XY9">
    <property type="method" value="X-ray"/>
    <property type="resolution" value="3.64 A"/>
    <property type="chains" value="B/D=333-526"/>
</dbReference>
<dbReference type="PDB" id="8XYE">
    <property type="method" value="X-ray"/>
    <property type="resolution" value="3.32 A"/>
    <property type="chains" value="C/D=333-526"/>
</dbReference>
<dbReference type="PDB" id="8XYG">
    <property type="method" value="X-ray"/>
    <property type="resolution" value="3.64 A"/>
    <property type="chains" value="B/D=334-525"/>
</dbReference>
<dbReference type="PDB" id="8XYH">
    <property type="method" value="EM"/>
    <property type="resolution" value="2.50 A"/>
    <property type="chains" value="A/B/C=1-1217"/>
</dbReference>
<dbReference type="PDB" id="8XYM">
    <property type="method" value="EM"/>
    <property type="resolution" value="2.74 A"/>
    <property type="chains" value="A/B/C=1-1214"/>
</dbReference>
<dbReference type="PDB" id="8XYO">
    <property type="method" value="EM"/>
    <property type="resolution" value="3.04 A"/>
    <property type="chains" value="B=1-1214"/>
</dbReference>
<dbReference type="PDB" id="8XYZ">
    <property type="method" value="EM"/>
    <property type="resolution" value="2.96 A"/>
    <property type="chains" value="B=323-541"/>
</dbReference>
<dbReference type="PDB" id="8XZ8">
    <property type="method" value="EM"/>
    <property type="resolution" value="3.65 A"/>
    <property type="chains" value="B/C/D=1-1208"/>
</dbReference>
<dbReference type="PDB" id="8XZ9">
    <property type="method" value="EM"/>
    <property type="resolution" value="3.37 A"/>
    <property type="chains" value="B/C/D=28-1144"/>
</dbReference>
<dbReference type="PDB" id="8XZA">
    <property type="method" value="EM"/>
    <property type="resolution" value="4.07 A"/>
    <property type="chains" value="B=1-1208"/>
</dbReference>
<dbReference type="PDB" id="8XZD">
    <property type="method" value="EM"/>
    <property type="resolution" value="3.47 A"/>
    <property type="chains" value="B=319-541"/>
</dbReference>
<dbReference type="PDB" id="8Y0Y">
    <property type="method" value="EM"/>
    <property type="resolution" value="2.86 A"/>
    <property type="chains" value="A=319-527"/>
</dbReference>
<dbReference type="PDB" id="8Y16">
    <property type="method" value="EM"/>
    <property type="resolution" value="2.98 A"/>
    <property type="chains" value="B/C/D=1-1208"/>
</dbReference>
<dbReference type="PDB" id="8Y18">
    <property type="method" value="EM"/>
    <property type="resolution" value="3.04 A"/>
    <property type="chains" value="B=1-1208"/>
</dbReference>
<dbReference type="PDB" id="8Y32">
    <property type="method" value="EM"/>
    <property type="resolution" value="4.13 A"/>
    <property type="chains" value="B=331-541"/>
</dbReference>
<dbReference type="PDB" id="8Y4A">
    <property type="method" value="EM"/>
    <property type="resolution" value="3.40 A"/>
    <property type="chains" value="A/B/C=1-1208"/>
</dbReference>
<dbReference type="PDB" id="8Y4C">
    <property type="method" value="EM"/>
    <property type="resolution" value="3.75 A"/>
    <property type="chains" value="A/B/C=1-1208"/>
</dbReference>
<dbReference type="PDB" id="8Y5J">
    <property type="method" value="EM"/>
    <property type="resolution" value="2.94 A"/>
    <property type="chains" value="A/B/C=1-1208"/>
</dbReference>
<dbReference type="PDB" id="8Y6A">
    <property type="method" value="EM"/>
    <property type="resolution" value="2.72 A"/>
    <property type="chains" value="B=319-541"/>
</dbReference>
<dbReference type="PDB" id="8YBS">
    <property type="method" value="EM"/>
    <property type="resolution" value="4.54 A"/>
    <property type="chains" value="B=1-1273"/>
</dbReference>
<dbReference type="PDB" id="8YBY">
    <property type="method" value="EM"/>
    <property type="resolution" value="4.40 A"/>
    <property type="chains" value="B/D/E=1-1273"/>
</dbReference>
<dbReference type="PDB" id="8YBZ">
    <property type="method" value="EM"/>
    <property type="resolution" value="4.80 A"/>
    <property type="chains" value="A/B/C=1-1273"/>
</dbReference>
<dbReference type="PDB" id="8YDP">
    <property type="method" value="X-ray"/>
    <property type="resolution" value="2.30 A"/>
    <property type="chains" value="B/D=333-526"/>
</dbReference>
<dbReference type="PDB" id="8YDQ">
    <property type="method" value="X-ray"/>
    <property type="resolution" value="1.90 A"/>
    <property type="chains" value="B=333-526"/>
</dbReference>
<dbReference type="PDB" id="8YDR">
    <property type="method" value="X-ray"/>
    <property type="resolution" value="2.30 A"/>
    <property type="chains" value="B=333-526"/>
</dbReference>
<dbReference type="PDB" id="8YDS">
    <property type="method" value="X-ray"/>
    <property type="resolution" value="1.90 A"/>
    <property type="chains" value="B=333-526"/>
</dbReference>
<dbReference type="PDB" id="8YDT">
    <property type="method" value="X-ray"/>
    <property type="resolution" value="2.50 A"/>
    <property type="chains" value="B/D=333-526"/>
</dbReference>
<dbReference type="PDB" id="8YDU">
    <property type="method" value="X-ray"/>
    <property type="resolution" value="1.70 A"/>
    <property type="chains" value="B=333-526"/>
</dbReference>
<dbReference type="PDB" id="8YDV">
    <property type="method" value="X-ray"/>
    <property type="resolution" value="2.20 A"/>
    <property type="chains" value="B/D=333-526"/>
</dbReference>
<dbReference type="PDB" id="8YDW">
    <property type="method" value="X-ray"/>
    <property type="resolution" value="2.00 A"/>
    <property type="chains" value="B=333-526"/>
</dbReference>
<dbReference type="PDB" id="8YDX">
    <property type="method" value="EM"/>
    <property type="resolution" value="4.90 A"/>
    <property type="chains" value="A/B/C=13-1208"/>
</dbReference>
<dbReference type="PDB" id="8YDY">
    <property type="method" value="EM"/>
    <property type="resolution" value="8.00 A"/>
    <property type="chains" value="A/B/C=13-1208"/>
</dbReference>
<dbReference type="PDB" id="8YDZ">
    <property type="method" value="EM"/>
    <property type="resolution" value="5.20 A"/>
    <property type="chains" value="A/B/C=13-1208"/>
</dbReference>
<dbReference type="PDB" id="8YE4">
    <property type="method" value="X-ray"/>
    <property type="resolution" value="3.20 A"/>
    <property type="chains" value="E/F=448-456"/>
</dbReference>
<dbReference type="PDB" id="8YF2">
    <property type="method" value="EM"/>
    <property type="resolution" value="2.64 A"/>
    <property type="chains" value="B=319-541"/>
</dbReference>
<dbReference type="PDB" id="8YFT">
    <property type="method" value="EM"/>
    <property type="resolution" value="3.16 A"/>
    <property type="chains" value="B=319-541"/>
</dbReference>
<dbReference type="PDB" id="8YKG">
    <property type="method" value="EM"/>
    <property type="resolution" value="3.28 A"/>
    <property type="chains" value="A/B/C=12-1210"/>
</dbReference>
<dbReference type="PDB" id="8YKH">
    <property type="method" value="EM"/>
    <property type="resolution" value="3.27 A"/>
    <property type="chains" value="B=12-1210"/>
</dbReference>
<dbReference type="PDB" id="8YRO">
    <property type="method" value="EM"/>
    <property type="resolution" value="3.27 A"/>
    <property type="chains" value="A/D/P=14-1208"/>
</dbReference>
<dbReference type="PDB" id="8YRP">
    <property type="method" value="EM"/>
    <property type="resolution" value="3.64 A"/>
    <property type="chains" value="A/B/C=14-1208"/>
</dbReference>
<dbReference type="PDB" id="8YWW">
    <property type="method" value="EM"/>
    <property type="resolution" value="2.70 A"/>
    <property type="chains" value="A/B/C=1-1210"/>
</dbReference>
<dbReference type="PDB" id="8YWX">
    <property type="method" value="EM"/>
    <property type="resolution" value="3.40 A"/>
    <property type="chains" value="A=27-1146"/>
</dbReference>
<dbReference type="PDB" id="8YZ5">
    <property type="method" value="EM"/>
    <property type="resolution" value="3.93 A"/>
    <property type="chains" value="A/C/D=14-1208"/>
</dbReference>
<dbReference type="PDB" id="8YZB">
    <property type="method" value="EM"/>
    <property type="resolution" value="3.29 A"/>
    <property type="chains" value="A=14-1208"/>
</dbReference>
<dbReference type="PDB" id="8YZC">
    <property type="method" value="EM"/>
    <property type="resolution" value="2.70 A"/>
    <property type="chains" value="A/B/C=14-1208"/>
</dbReference>
<dbReference type="PDB" id="8YZD">
    <property type="method" value="EM"/>
    <property type="resolution" value="3.07 A"/>
    <property type="chains" value="A=14-1208"/>
</dbReference>
<dbReference type="PDB" id="8YZE">
    <property type="method" value="EM"/>
    <property type="resolution" value="3.06 A"/>
    <property type="chains" value="A/B/C=14-1208"/>
</dbReference>
<dbReference type="PDB" id="8YZR">
    <property type="method" value="X-ray"/>
    <property type="resolution" value="1.80 A"/>
    <property type="chains" value="E=448-456"/>
</dbReference>
<dbReference type="PDB" id="8YZW">
    <property type="method" value="X-ray"/>
    <property type="resolution" value="2.36 A"/>
    <property type="chains" value="C/F=448-456"/>
</dbReference>
<dbReference type="PDB" id="8YZZ">
    <property type="method" value="X-ray"/>
    <property type="resolution" value="1.88 A"/>
    <property type="chains" value="E=448-456"/>
</dbReference>
<dbReference type="PDB" id="8Z05">
    <property type="method" value="X-ray"/>
    <property type="resolution" value="1.96 A"/>
    <property type="chains" value="C=1181-1189"/>
</dbReference>
<dbReference type="PDB" id="8Z06">
    <property type="method" value="X-ray"/>
    <property type="resolution" value="2.39 A"/>
    <property type="chains" value="E=448-456"/>
</dbReference>
<dbReference type="PDB" id="8Z07">
    <property type="method" value="X-ray"/>
    <property type="resolution" value="2.70 A"/>
    <property type="chains" value="C=448-456"/>
</dbReference>
<dbReference type="PDB" id="8Z08">
    <property type="method" value="X-ray"/>
    <property type="resolution" value="2.01 A"/>
    <property type="chains" value="F=448-456"/>
</dbReference>
<dbReference type="PDB" id="8Z3W">
    <property type="method" value="EM"/>
    <property type="resolution" value="3.45 A"/>
    <property type="chains" value="A/B/C=1-1208"/>
</dbReference>
<dbReference type="PDB" id="8Z4X">
    <property type="method" value="EM"/>
    <property type="resolution" value="3.40 A"/>
    <property type="chains" value="A/B/C=1-1208"/>
</dbReference>
<dbReference type="PDB" id="8Z64">
    <property type="method" value="EM"/>
    <property type="resolution" value="3.53 A"/>
    <property type="chains" value="A/C=1-1208"/>
</dbReference>
<dbReference type="PDB" id="8Z6A">
    <property type="method" value="EM"/>
    <property type="resolution" value="2.99 A"/>
    <property type="chains" value="A/B/C=1-1208"/>
</dbReference>
<dbReference type="PDB" id="8Z6U">
    <property type="method" value="EM"/>
    <property type="resolution" value="3.83 A"/>
    <property type="chains" value="A/B/C/D/E/F=14-1208"/>
</dbReference>
<dbReference type="PDB" id="8Z6W">
    <property type="method" value="EM"/>
    <property type="resolution" value="3.04 A"/>
    <property type="chains" value="A/B/C=14-1208"/>
</dbReference>
<dbReference type="PDB" id="8Z6X">
    <property type="method" value="EM"/>
    <property type="resolution" value="2.96 A"/>
    <property type="chains" value="A=14-1208"/>
</dbReference>
<dbReference type="PDB" id="8Z7B">
    <property type="method" value="EM"/>
    <property type="resolution" value="3.30 A"/>
    <property type="chains" value="A/C=1-1208"/>
</dbReference>
<dbReference type="PDB" id="8Z7G">
    <property type="method" value="EM"/>
    <property type="resolution" value="3.06 A"/>
    <property type="chains" value="A/B/C=1-1208"/>
</dbReference>
<dbReference type="PDB" id="8Z7L">
    <property type="method" value="EM"/>
    <property type="resolution" value="3.42 A"/>
    <property type="chains" value="A/B/C=1-1208"/>
</dbReference>
<dbReference type="PDB" id="8Z7P">
    <property type="method" value="EM"/>
    <property type="resolution" value="3.45 A"/>
    <property type="chains" value="A/B/C=1-1208"/>
</dbReference>
<dbReference type="PDB" id="8Z86">
    <property type="method" value="EM"/>
    <property type="resolution" value="3.87 A"/>
    <property type="chains" value="A=328-528"/>
</dbReference>
<dbReference type="PDB" id="8ZBQ">
    <property type="method" value="EM"/>
    <property type="resolution" value="3.03 A"/>
    <property type="chains" value="F=336-518"/>
</dbReference>
<dbReference type="PDB" id="8ZBZ">
    <property type="method" value="EM"/>
    <property type="resolution" value="4.71 A"/>
    <property type="chains" value="A/B/C=14-1211"/>
</dbReference>
<dbReference type="PDB" id="8ZC0">
    <property type="method" value="EM"/>
    <property type="resolution" value="4.17 A"/>
    <property type="chains" value="A/B/C=14-1211"/>
</dbReference>
<dbReference type="PDB" id="8ZC1">
    <property type="method" value="EM"/>
    <property type="resolution" value="4.17 A"/>
    <property type="chains" value="B=332-527"/>
</dbReference>
<dbReference type="PDB" id="8ZC2">
    <property type="method" value="EM"/>
    <property type="resolution" value="7.82 A"/>
    <property type="chains" value="A/B/C/D/E/F=14-1211"/>
</dbReference>
<dbReference type="PDB" id="8ZC3">
    <property type="method" value="EM"/>
    <property type="resolution" value="4.69 A"/>
    <property type="chains" value="A/B/C=14-1211"/>
</dbReference>
<dbReference type="PDB" id="8ZC4">
    <property type="method" value="EM"/>
    <property type="resolution" value="3.95 A"/>
    <property type="chains" value="A/B/C=14-1211"/>
</dbReference>
<dbReference type="PDB" id="8ZC5">
    <property type="method" value="EM"/>
    <property type="resolution" value="3.91 A"/>
    <property type="chains" value="A/B=332-527"/>
</dbReference>
<dbReference type="PDB" id="8ZC6">
    <property type="method" value="EM"/>
    <property type="resolution" value="6.85 A"/>
    <property type="chains" value="A/B/C/D/E/F=14-1211"/>
</dbReference>
<dbReference type="PDB" id="8ZER">
    <property type="method" value="X-ray"/>
    <property type="resolution" value="3.10 A"/>
    <property type="chains" value="B/C/E/G/I=319-541"/>
</dbReference>
<dbReference type="PDB" id="8ZES">
    <property type="method" value="X-ray"/>
    <property type="resolution" value="3.70 A"/>
    <property type="chains" value="A/C/D/G/I=333-541"/>
</dbReference>
<dbReference type="PDB" id="8ZHD">
    <property type="method" value="EM"/>
    <property type="resolution" value="3.41 A"/>
    <property type="chains" value="A/B/C=11-1208"/>
</dbReference>
<dbReference type="PDB" id="8ZHE">
    <property type="method" value="EM"/>
    <property type="resolution" value="3.16 A"/>
    <property type="chains" value="A/B/C=11-1208"/>
</dbReference>
<dbReference type="PDB" id="8ZHF">
    <property type="method" value="EM"/>
    <property type="resolution" value="5.26 A"/>
    <property type="chains" value="A/B/C/D/E/I=11-1208"/>
</dbReference>
<dbReference type="PDB" id="8ZHG">
    <property type="method" value="EM"/>
    <property type="resolution" value="3.51 A"/>
    <property type="chains" value="C=11-1208"/>
</dbReference>
<dbReference type="PDB" id="8ZHH">
    <property type="method" value="EM"/>
    <property type="resolution" value="5.55 A"/>
    <property type="chains" value="A/B/C=11-1208"/>
</dbReference>
<dbReference type="PDB" id="8ZHI">
    <property type="method" value="EM"/>
    <property type="resolution" value="6.05 A"/>
    <property type="chains" value="A/B/C=11-1208"/>
</dbReference>
<dbReference type="PDB" id="8ZHJ">
    <property type="method" value="EM"/>
    <property type="resolution" value="8.45 A"/>
    <property type="chains" value="A/B/C/G/H/I=11-1208"/>
</dbReference>
<dbReference type="PDB" id="8ZHK">
    <property type="method" value="EM"/>
    <property type="resolution" value="6.30 A"/>
    <property type="chains" value="A/B/C/G/H/I=11-1208"/>
</dbReference>
<dbReference type="PDB" id="8ZHL">
    <property type="method" value="EM"/>
    <property type="resolution" value="3.96 A"/>
    <property type="chains" value="A/B/C=11-1208"/>
</dbReference>
<dbReference type="PDB" id="8ZHM">
    <property type="method" value="EM"/>
    <property type="resolution" value="3.39 A"/>
    <property type="chains" value="A/B/C=11-1208"/>
</dbReference>
<dbReference type="PDB" id="8ZHN">
    <property type="method" value="EM"/>
    <property type="resolution" value="4.12 A"/>
    <property type="chains" value="A/B/C=11-1208"/>
</dbReference>
<dbReference type="PDB" id="8ZHO">
    <property type="method" value="EM"/>
    <property type="resolution" value="3.54 A"/>
    <property type="chains" value="C=11-676"/>
</dbReference>
<dbReference type="PDB" id="8ZHP">
    <property type="method" value="EM"/>
    <property type="resolution" value="3.66 A"/>
    <property type="chains" value="A/C=11-676"/>
</dbReference>
<dbReference type="PDB" id="8ZPP">
    <property type="method" value="EM"/>
    <property type="resolution" value="3.60 A"/>
    <property type="chains" value="A=1-1208"/>
</dbReference>
<dbReference type="PDB" id="8ZV9">
    <property type="method" value="X-ray"/>
    <property type="resolution" value="2.60 A"/>
    <property type="chains" value="C/F/I=448-456"/>
</dbReference>
<dbReference type="PDB" id="8ZY2">
    <property type="method" value="EM"/>
    <property type="resolution" value="2.90 A"/>
    <property type="chains" value="A/B/C=1-1140"/>
</dbReference>
<dbReference type="PDB" id="8ZY3">
    <property type="method" value="EM"/>
    <property type="resolution" value="3.30 A"/>
    <property type="chains" value="A/B/C=1-1216"/>
</dbReference>
<dbReference type="PDB" id="9ARU">
    <property type="method" value="EM"/>
    <property type="resolution" value="3.90 A"/>
    <property type="chains" value="A/B/C=1-1208"/>
</dbReference>
<dbReference type="PDB" id="9ASD">
    <property type="method" value="EM"/>
    <property type="resolution" value="3.30 A"/>
    <property type="chains" value="R=1-1208"/>
</dbReference>
<dbReference type="PDB" id="9ATO">
    <property type="method" value="EM"/>
    <property type="resolution" value="3.20 A"/>
    <property type="chains" value="A/B/C=14-1211"/>
</dbReference>
<dbReference type="PDB" id="9ATP">
    <property type="method" value="EM"/>
    <property type="resolution" value="3.50 A"/>
    <property type="chains" value="A/B/C=14-1211"/>
</dbReference>
<dbReference type="PDB" id="9AU2">
    <property type="method" value="EM"/>
    <property type="resolution" value="3.10 A"/>
    <property type="chains" value="A/B/C=1-1208"/>
</dbReference>
<dbReference type="PDB" id="9AYW">
    <property type="method" value="EM"/>
    <property type="resolution" value="3.00 A"/>
    <property type="chains" value="A/B/C=1-1208"/>
</dbReference>
<dbReference type="PDB" id="9AYX">
    <property type="method" value="EM"/>
    <property type="resolution" value="3.00 A"/>
    <property type="chains" value="A/B/C=1-1208"/>
</dbReference>
<dbReference type="PDB" id="9AYY">
    <property type="method" value="EM"/>
    <property type="resolution" value="3.10 A"/>
    <property type="chains" value="A/B/C=1-1208"/>
</dbReference>
<dbReference type="PDB" id="9B0Y">
    <property type="method" value="EM"/>
    <property type="resolution" value="2.32 A"/>
    <property type="chains" value="A/B/C=19-1208"/>
</dbReference>
<dbReference type="PDB" id="9B2V">
    <property type="method" value="EM"/>
    <property type="resolution" value="2.55 A"/>
    <property type="chains" value="A/B/C=19-1208"/>
</dbReference>
<dbReference type="PDB" id="9B82">
    <property type="method" value="X-ray"/>
    <property type="resolution" value="3.38 A"/>
    <property type="chains" value="A/B/C/D/E/F=333-530"/>
</dbReference>
<dbReference type="PDB" id="9BJ2">
    <property type="method" value="EM"/>
    <property type="resolution" value="2.80 A"/>
    <property type="chains" value="A=1-1208"/>
</dbReference>
<dbReference type="PDB" id="9BJ3">
    <property type="method" value="EM"/>
    <property type="resolution" value="3.04 A"/>
    <property type="chains" value="A/B/S=1-1213"/>
</dbReference>
<dbReference type="PDB" id="9BJ4">
    <property type="method" value="EM"/>
    <property type="resolution" value="3.40 A"/>
    <property type="chains" value="A/B/C=1-1208"/>
</dbReference>
<dbReference type="PDB" id="9C44">
    <property type="method" value="EM"/>
    <property type="resolution" value="2.60 A"/>
    <property type="chains" value="A/B/C=1-1208"/>
</dbReference>
<dbReference type="PDB" id="9C45">
    <property type="method" value="EM"/>
    <property type="resolution" value="3.20 A"/>
    <property type="chains" value="A=1-1208"/>
</dbReference>
<dbReference type="PDB" id="9CCI">
    <property type="method" value="EM"/>
    <property type="resolution" value="2.65 A"/>
    <property type="chains" value="A=1-1208"/>
</dbReference>
<dbReference type="PDB" id="9CCJ">
    <property type="method" value="EM"/>
    <property type="resolution" value="2.37 A"/>
    <property type="chains" value="A=14-1208"/>
</dbReference>
<dbReference type="PDB" id="9CO7">
    <property type="method" value="EM"/>
    <property type="resolution" value="3.32 A"/>
    <property type="chains" value="A/B=14-1216"/>
</dbReference>
<dbReference type="PDB" id="9CO8">
    <property type="method" value="EM"/>
    <property type="resolution" value="2.99 A"/>
    <property type="chains" value="A/B/C=28-1211"/>
</dbReference>
<dbReference type="PDB" id="9CO9">
    <property type="method" value="EM"/>
    <property type="resolution" value="3.44 A"/>
    <property type="chains" value="A/B=1-1216"/>
</dbReference>
<dbReference type="PDB" id="9CRC">
    <property type="method" value="EM"/>
    <property type="resolution" value="2.90 A"/>
    <property type="chains" value="A/B/C=1-1273"/>
</dbReference>
<dbReference type="PDB" id="9CRD">
    <property type="method" value="EM"/>
    <property type="resolution" value="3.50 A"/>
    <property type="chains" value="A/B/C=1-1273"/>
</dbReference>
<dbReference type="PDB" id="9CRE">
    <property type="method" value="EM"/>
    <property type="resolution" value="3.20 A"/>
    <property type="chains" value="A/B/C=1-1273"/>
</dbReference>
<dbReference type="PDB" id="9CRF">
    <property type="method" value="EM"/>
    <property type="resolution" value="4.00 A"/>
    <property type="chains" value="A/B/C=1-1273"/>
</dbReference>
<dbReference type="PDB" id="9CRG">
    <property type="method" value="EM"/>
    <property type="resolution" value="3.30 A"/>
    <property type="chains" value="A/B/C=1-1273"/>
</dbReference>
<dbReference type="PDB" id="9CRH">
    <property type="method" value="EM"/>
    <property type="resolution" value="3.40 A"/>
    <property type="chains" value="A/B/C=1-1273"/>
</dbReference>
<dbReference type="PDB" id="9CRI">
    <property type="method" value="EM"/>
    <property type="resolution" value="2.80 A"/>
    <property type="chains" value="A/B/C=1-1273"/>
</dbReference>
<dbReference type="PDB" id="9CSS">
    <property type="method" value="EM"/>
    <property type="resolution" value="2.72 A"/>
    <property type="chains" value="A/B/C=19-1208"/>
</dbReference>
<dbReference type="PDB" id="9CT2">
    <property type="method" value="EM"/>
    <property type="resolution" value="2.70 A"/>
    <property type="chains" value="A/B/C=19-1208"/>
</dbReference>
<dbReference type="PDB" id="9CVH">
    <property type="method" value="EM"/>
    <property type="resolution" value="2.76 A"/>
    <property type="chains" value="A/B/C=19-1208"/>
</dbReference>
<dbReference type="PDB" id="9CXE">
    <property type="method" value="EM"/>
    <property type="resolution" value="2.48 A"/>
    <property type="chains" value="A/B/C=19-1208"/>
</dbReference>
<dbReference type="PDB" id="9F9Y">
    <property type="method" value="EM"/>
    <property type="resolution" value="2.80 A"/>
    <property type="chains" value="A/B/C=1-1183"/>
</dbReference>
<dbReference type="PDB" id="9FGR">
    <property type="method" value="EM"/>
    <property type="resolution" value="4.00 A"/>
    <property type="chains" value="C=1-1208"/>
</dbReference>
<dbReference type="PDB" id="9FGS">
    <property type="method" value="EM"/>
    <property type="resolution" value="4.00 A"/>
    <property type="chains" value="C=1-1208"/>
</dbReference>
<dbReference type="PDB" id="9FGT">
    <property type="method" value="EM"/>
    <property type="resolution" value="3.80 A"/>
    <property type="chains" value="C=1-1208"/>
</dbReference>
<dbReference type="PDB" id="9FGU">
    <property type="method" value="EM"/>
    <property type="resolution" value="4.30 A"/>
    <property type="chains" value="C=1-1208"/>
</dbReference>
<dbReference type="PDB" id="9FJK">
    <property type="method" value="EM"/>
    <property type="resolution" value="2.84 A"/>
    <property type="chains" value="A/B/C=1-1207"/>
</dbReference>
<dbReference type="PDB" id="9GDX">
    <property type="method" value="EM"/>
    <property type="resolution" value="2.80 A"/>
    <property type="chains" value="A/B/C=14-1208"/>
</dbReference>
<dbReference type="PDB" id="9GDY">
    <property type="method" value="EM"/>
    <property type="resolution" value="2.80 A"/>
    <property type="chains" value="A/B/C=14-1208"/>
</dbReference>
<dbReference type="PDB" id="9IU1">
    <property type="method" value="EM"/>
    <property type="resolution" value="4.30 A"/>
    <property type="chains" value="B=28-1210"/>
</dbReference>
<dbReference type="PDB" id="9IUP">
    <property type="method" value="EM"/>
    <property type="resolution" value="3.30 A"/>
    <property type="chains" value="B=334-527"/>
</dbReference>
<dbReference type="PDB" id="9IUQ">
    <property type="method" value="EM"/>
    <property type="resolution" value="3.30 A"/>
    <property type="chains" value="B=334-524"/>
</dbReference>
<dbReference type="PDB" id="9IUU">
    <property type="method" value="EM"/>
    <property type="resolution" value="3.29 A"/>
    <property type="chains" value="B=333-527"/>
</dbReference>
<dbReference type="PDB" id="9J66">
    <property type="method" value="EM"/>
    <property type="resolution" value="3.55 A"/>
    <property type="chains" value="A/D=333-527"/>
</dbReference>
<dbReference type="PDB" id="9JS4">
    <property type="method" value="EM"/>
    <property type="resolution" value="3.80 A"/>
    <property type="chains" value="C=16-1207"/>
</dbReference>
<dbReference type="PDB" id="9KT3">
    <property type="method" value="EM"/>
    <property type="resolution" value="3.63 A"/>
    <property type="chains" value="A/B/C=14-1208"/>
</dbReference>
<dbReference type="PDB" id="9LAE">
    <property type="method" value="EM"/>
    <property type="resolution" value="3.46 A"/>
    <property type="chains" value="G=319-541"/>
</dbReference>
<dbReference type="PDB" id="9N2L">
    <property type="method" value="EM"/>
    <property type="resolution" value="2.99 A"/>
    <property type="chains" value="F=319-541"/>
</dbReference>
<dbReference type="PDBsum" id="6LVN"/>
<dbReference type="PDBsum" id="6LXT"/>
<dbReference type="PDBsum" id="6LZG"/>
<dbReference type="PDBsum" id="6M0J"/>
<dbReference type="PDBsum" id="6M17"/>
<dbReference type="PDBsum" id="6M1V"/>
<dbReference type="PDBsum" id="6VSB"/>
<dbReference type="PDBsum" id="6VW1"/>
<dbReference type="PDBsum" id="6VXX"/>
<dbReference type="PDBsum" id="6VYB"/>
<dbReference type="PDBsum" id="6W41"/>
<dbReference type="PDBsum" id="6WPS"/>
<dbReference type="PDBsum" id="6WPT"/>
<dbReference type="PDBsum" id="6X29"/>
<dbReference type="PDBsum" id="6X2A"/>
<dbReference type="PDBsum" id="6X2B"/>
<dbReference type="PDBsum" id="6X2C"/>
<dbReference type="PDBsum" id="6X45"/>
<dbReference type="PDBsum" id="6X6P"/>
<dbReference type="PDBsum" id="6X79"/>
<dbReference type="PDBsum" id="6XC2"/>
<dbReference type="PDBsum" id="6XC3"/>
<dbReference type="PDBsum" id="6XC4"/>
<dbReference type="PDBsum" id="6XC7"/>
<dbReference type="PDBsum" id="6XCM"/>
<dbReference type="PDBsum" id="6XCN"/>
<dbReference type="PDBsum" id="6XDG"/>
<dbReference type="PDBsum" id="6XE1"/>
<dbReference type="PDBsum" id="6XEY"/>
<dbReference type="PDBsum" id="6XF5"/>
<dbReference type="PDBsum" id="6XF6"/>
<dbReference type="PDBsum" id="6XKL"/>
<dbReference type="PDBsum" id="6XKP"/>
<dbReference type="PDBsum" id="6XKQ"/>
<dbReference type="PDBsum" id="6XLU"/>
<dbReference type="PDBsum" id="6XM0"/>
<dbReference type="PDBsum" id="6XM3"/>
<dbReference type="PDBsum" id="6XM4"/>
<dbReference type="PDBsum" id="6XM5"/>
<dbReference type="PDBsum" id="6XR8"/>
<dbReference type="PDBsum" id="6XRA"/>
<dbReference type="PDBsum" id="6XS6"/>
<dbReference type="PDBsum" id="6YLA"/>
<dbReference type="PDBsum" id="6YM0"/>
<dbReference type="PDBsum" id="6YOR"/>
<dbReference type="PDBsum" id="6YZ5"/>
<dbReference type="PDBsum" id="6YZ7"/>
<dbReference type="PDBsum" id="6Z2M"/>
<dbReference type="PDBsum" id="6Z43"/>
<dbReference type="PDBsum" id="6Z97"/>
<dbReference type="PDBsum" id="6ZB4"/>
<dbReference type="PDBsum" id="6ZB5"/>
<dbReference type="PDBsum" id="6ZBP"/>
<dbReference type="PDBsum" id="6ZCZ"/>
<dbReference type="PDBsum" id="6ZDG"/>
<dbReference type="PDBsum" id="6ZDH"/>
<dbReference type="PDBsum" id="6ZER"/>
<dbReference type="PDBsum" id="6ZFO"/>
<dbReference type="PDBsum" id="6ZGE"/>
<dbReference type="PDBsum" id="6ZGG"/>
<dbReference type="PDBsum" id="6ZGI"/>
<dbReference type="PDBsum" id="6ZH9"/>
<dbReference type="PDBsum" id="6ZHD"/>
<dbReference type="PDBsum" id="6ZLR"/>
<dbReference type="PDBsum" id="6ZOW"/>
<dbReference type="PDBsum" id="6ZOX"/>
<dbReference type="PDBsum" id="6ZOY"/>
<dbReference type="PDBsum" id="6ZOZ"/>
<dbReference type="PDBsum" id="6ZP0"/>
<dbReference type="PDBsum" id="6ZP1"/>
<dbReference type="PDBsum" id="6ZP2"/>
<dbReference type="PDBsum" id="6ZP5"/>
<dbReference type="PDBsum" id="6ZP7"/>
<dbReference type="PDBsum" id="6ZWV"/>
<dbReference type="PDBsum" id="6ZXN"/>
<dbReference type="PDBsum" id="7A25"/>
<dbReference type="PDBsum" id="7A29"/>
<dbReference type="PDBsum" id="7A4N"/>
<dbReference type="PDBsum" id="7A5R"/>
<dbReference type="PDBsum" id="7A5S"/>
<dbReference type="PDBsum" id="7A91"/>
<dbReference type="PDBsum" id="7A92"/>
<dbReference type="PDBsum" id="7A93"/>
<dbReference type="PDBsum" id="7A94"/>
<dbReference type="PDBsum" id="7A95"/>
<dbReference type="PDBsum" id="7A96"/>
<dbReference type="PDBsum" id="7A97"/>
<dbReference type="PDBsum" id="7A98"/>
<dbReference type="PDBsum" id="7AD1"/>
<dbReference type="PDBsum" id="7AKD"/>
<dbReference type="PDBsum" id="7B0B"/>
<dbReference type="PDBsum" id="7B14"/>
<dbReference type="PDBsum" id="7B17"/>
<dbReference type="PDBsum" id="7B18"/>
<dbReference type="PDBsum" id="7B3O"/>
<dbReference type="PDBsum" id="7B62"/>
<dbReference type="PDBsum" id="7BEH"/>
<dbReference type="PDBsum" id="7BEI"/>
<dbReference type="PDBsum" id="7BEJ"/>
<dbReference type="PDBsum" id="7BEK"/>
<dbReference type="PDBsum" id="7BEL"/>
<dbReference type="PDBsum" id="7BEM"/>
<dbReference type="PDBsum" id="7BEN"/>
<dbReference type="PDBsum" id="7BEO"/>
<dbReference type="PDBsum" id="7BEP"/>
<dbReference type="PDBsum" id="7BH9"/>
<dbReference type="PDBsum" id="7BNM"/>
<dbReference type="PDBsum" id="7BNN"/>
<dbReference type="PDBsum" id="7BNO"/>
<dbReference type="PDBsum" id="7BNV"/>
<dbReference type="PDBsum" id="7BWJ"/>
<dbReference type="PDBsum" id="7BYR"/>
<dbReference type="PDBsum" id="7BZ5"/>
<dbReference type="PDBsum" id="7C01"/>
<dbReference type="PDBsum" id="7C2L"/>
<dbReference type="PDBsum" id="7C53"/>
<dbReference type="PDBsum" id="7C8D"/>
<dbReference type="PDBsum" id="7C8J"/>
<dbReference type="PDBsum" id="7C8V"/>
<dbReference type="PDBsum" id="7C8W"/>
<dbReference type="PDBsum" id="7CAB"/>
<dbReference type="PDBsum" id="7CAC"/>
<dbReference type="PDBsum" id="7CAH"/>
<dbReference type="PDBsum" id="7CAI"/>
<dbReference type="PDBsum" id="7CAK"/>
<dbReference type="PDBsum" id="7CAN"/>
<dbReference type="PDBsum" id="7CDI"/>
<dbReference type="PDBsum" id="7CDJ"/>
<dbReference type="PDBsum" id="7CH4"/>
<dbReference type="PDBsum" id="7CH5"/>
<dbReference type="PDBsum" id="7CHB"/>
<dbReference type="PDBsum" id="7CHC"/>
<dbReference type="PDBsum" id="7CHE"/>
<dbReference type="PDBsum" id="7CHF"/>
<dbReference type="PDBsum" id="7CHH"/>
<dbReference type="PDBsum" id="7CHO"/>
<dbReference type="PDBsum" id="7CHP"/>
<dbReference type="PDBsum" id="7CHS"/>
<dbReference type="PDBsum" id="7CJF"/>
<dbReference type="PDBsum" id="7CM4"/>
<dbReference type="PDBsum" id="7CN4"/>
<dbReference type="PDBsum" id="7CN9"/>
<dbReference type="PDBsum" id="7CT5"/>
<dbReference type="PDBsum" id="7CWL"/>
<dbReference type="PDBsum" id="7CWM"/>
<dbReference type="PDBsum" id="7CWN"/>
<dbReference type="PDBsum" id="7CWO"/>
<dbReference type="PDBsum" id="7CWS"/>
<dbReference type="PDBsum" id="7CWT"/>
<dbReference type="PDBsum" id="7CWU"/>
<dbReference type="PDBsum" id="7CYH"/>
<dbReference type="PDBsum" id="7CYP"/>
<dbReference type="PDBsum" id="7CYV"/>
<dbReference type="PDBsum" id="7CZP"/>
<dbReference type="PDBsum" id="7CZQ"/>
<dbReference type="PDBsum" id="7CZR"/>
<dbReference type="PDBsum" id="7CZS"/>
<dbReference type="PDBsum" id="7CZT"/>
<dbReference type="PDBsum" id="7CZU"/>
<dbReference type="PDBsum" id="7CZV"/>
<dbReference type="PDBsum" id="7CZW"/>
<dbReference type="PDBsum" id="7CZX"/>
<dbReference type="PDBsum" id="7CZY"/>
<dbReference type="PDBsum" id="7CZZ"/>
<dbReference type="PDBsum" id="7D00"/>
<dbReference type="PDBsum" id="7D03"/>
<dbReference type="PDBsum" id="7D0B"/>
<dbReference type="PDBsum" id="7D0C"/>
<dbReference type="PDBsum" id="7D0D"/>
<dbReference type="PDBsum" id="7D2Z"/>
<dbReference type="PDBsum" id="7D30"/>
<dbReference type="PDBsum" id="7D4G"/>
<dbReference type="PDBsum" id="7D6I"/>
<dbReference type="PDBsum" id="7DCC"/>
<dbReference type="PDBsum" id="7DCX"/>
<dbReference type="PDBsum" id="7DD2"/>
<dbReference type="PDBsum" id="7DD8"/>
<dbReference type="PDBsum" id="7DDD"/>
<dbReference type="PDBsum" id="7DDN"/>
<dbReference type="PDBsum" id="7DEO"/>
<dbReference type="PDBsum" id="7DET"/>
<dbReference type="PDBsum" id="7DEU"/>
<dbReference type="PDBsum" id="7DF3"/>
<dbReference type="PDBsum" id="7DF4"/>
<dbReference type="PDBsum" id="7DHX"/>
<dbReference type="PDBsum" id="7DJZ"/>
<dbReference type="PDBsum" id="7DK0"/>
<dbReference type="PDBsum" id="7DK2"/>
<dbReference type="PDBsum" id="7DK3"/>
<dbReference type="PDBsum" id="7DK4"/>
<dbReference type="PDBsum" id="7DK5"/>
<dbReference type="PDBsum" id="7DK6"/>
<dbReference type="PDBsum" id="7DK7"/>
<dbReference type="PDBsum" id="7DMU"/>
<dbReference type="PDBsum" id="7DPM"/>
<dbReference type="PDBsum" id="7DQA"/>
<dbReference type="PDBsum" id="7DWX"/>
<dbReference type="PDBsum" id="7DWY"/>
<dbReference type="PDBsum" id="7DWZ"/>
<dbReference type="PDBsum" id="7DX0"/>
<dbReference type="PDBsum" id="7DX1"/>
<dbReference type="PDBsum" id="7DX2"/>
<dbReference type="PDBsum" id="7DX3"/>
<dbReference type="PDBsum" id="7DX4"/>
<dbReference type="PDBsum" id="7DX5"/>
<dbReference type="PDBsum" id="7DX6"/>
<dbReference type="PDBsum" id="7DX7"/>
<dbReference type="PDBsum" id="7DX8"/>
<dbReference type="PDBsum" id="7DX9"/>
<dbReference type="PDBsum" id="7DZW"/>
<dbReference type="PDBsum" id="7DZX"/>
<dbReference type="PDBsum" id="7DZY"/>
<dbReference type="PDBsum" id="7E23"/>
<dbReference type="PDBsum" id="7E39"/>
<dbReference type="PDBsum" id="7E3B"/>
<dbReference type="PDBsum" id="7E3C"/>
<dbReference type="PDBsum" id="7E3J"/>
<dbReference type="PDBsum" id="7E3K"/>
<dbReference type="PDBsum" id="7E3L"/>
<dbReference type="PDBsum" id="7E3O"/>
<dbReference type="PDBsum" id="7E5O"/>
<dbReference type="PDBsum" id="7E5R"/>
<dbReference type="PDBsum" id="7E5S"/>
<dbReference type="PDBsum" id="7E5Y"/>
<dbReference type="PDBsum" id="7E7B"/>
<dbReference type="PDBsum" id="7E7D"/>
<dbReference type="PDBsum" id="7E7X"/>
<dbReference type="PDBsum" id="7E7Y"/>
<dbReference type="PDBsum" id="7E86"/>
<dbReference type="PDBsum" id="7E88"/>
<dbReference type="PDBsum" id="7E8C"/>
<dbReference type="PDBsum" id="7E8F"/>
<dbReference type="PDBsum" id="7E8M"/>
<dbReference type="PDBsum" id="7E9N"/>
<dbReference type="PDBsum" id="7E9O"/>
<dbReference type="PDBsum" id="7E9P"/>
<dbReference type="PDBsum" id="7E9Q"/>
<dbReference type="PDBsum" id="7E9T"/>
<dbReference type="PDBsum" id="7EAM"/>
<dbReference type="PDBsum" id="7EAN"/>
<dbReference type="PDBsum" id="7EAZ"/>
<dbReference type="PDBsum" id="7EB0"/>
<dbReference type="PDBsum" id="7EB3"/>
<dbReference type="PDBsum" id="7EB4"/>
<dbReference type="PDBsum" id="7EB5"/>
<dbReference type="PDBsum" id="7EDF"/>
<dbReference type="PDBsum" id="7EDG"/>
<dbReference type="PDBsum" id="7EDH"/>
<dbReference type="PDBsum" id="7EDI"/>
<dbReference type="PDBsum" id="7EDJ"/>
<dbReference type="PDBsum" id="7EFP"/>
<dbReference type="PDBsum" id="7EFR"/>
<dbReference type="PDBsum" id="7EH5"/>
<dbReference type="PDBsum" id="7EJ4"/>
<dbReference type="PDBsum" id="7EJ5"/>
<dbReference type="PDBsum" id="7EJL"/>
<dbReference type="PDBsum" id="7EJY"/>
<dbReference type="PDBsum" id="7EJZ"/>
<dbReference type="PDBsum" id="7EK0"/>
<dbReference type="PDBsum" id="7EK6"/>
<dbReference type="PDBsum" id="7EKC"/>
<dbReference type="PDBsum" id="7EKE"/>
<dbReference type="PDBsum" id="7EKF"/>
<dbReference type="PDBsum" id="7EKG"/>
<dbReference type="PDBsum" id="7EKH"/>
<dbReference type="PDBsum" id="7ENF"/>
<dbReference type="PDBsum" id="7ENG"/>
<dbReference type="PDBsum" id="7EPX"/>
<dbReference type="PDBsum" id="7EU2"/>
<dbReference type="PDBsum" id="7EY0"/>
<dbReference type="PDBsum" id="7EY4"/>
<dbReference type="PDBsum" id="7EY5"/>
<dbReference type="PDBsum" id="7EYA"/>
<dbReference type="PDBsum" id="7EZV"/>
<dbReference type="PDBsum" id="7F0X"/>
<dbReference type="PDBsum" id="7F12"/>
<dbReference type="PDBsum" id="7F15"/>
<dbReference type="PDBsum" id="7F3Q"/>
<dbReference type="PDBsum" id="7F46"/>
<dbReference type="PDBsum" id="7F4W"/>
<dbReference type="PDBsum" id="7F5G"/>
<dbReference type="PDBsum" id="7F5H"/>
<dbReference type="PDBsum" id="7F5R"/>
<dbReference type="PDBsum" id="7F62"/>
<dbReference type="PDBsum" id="7F63"/>
<dbReference type="PDBsum" id="7F6Y"/>
<dbReference type="PDBsum" id="7F6Z"/>
<dbReference type="PDBsum" id="7F7E"/>
<dbReference type="PDBsum" id="7F7H"/>
<dbReference type="PDBsum" id="7FAE"/>
<dbReference type="PDBsum" id="7FAF"/>
<dbReference type="PDBsum" id="7FAT"/>
<dbReference type="PDBsum" id="7FAU"/>
<dbReference type="PDBsum" id="7FB0"/>
<dbReference type="PDBsum" id="7FB1"/>
<dbReference type="PDBsum" id="7FB3"/>
<dbReference type="PDBsum" id="7FB4"/>
<dbReference type="PDBsum" id="7FBJ"/>
<dbReference type="PDBsum" id="7FBK"/>
<dbReference type="PDBsum" id="7FC5"/>
<dbReference type="PDBsum" id="7FCD"/>
<dbReference type="PDBsum" id="7FCE"/>
<dbReference type="PDBsum" id="7FCP"/>
<dbReference type="PDBsum" id="7FCQ"/>
<dbReference type="PDBsum" id="7FDG"/>
<dbReference type="PDBsum" id="7FDH"/>
<dbReference type="PDBsum" id="7FDI"/>
<dbReference type="PDBsum" id="7FDK"/>
<dbReference type="PDBsum" id="7FEM"/>
<dbReference type="PDBsum" id="7FET"/>
<dbReference type="PDBsum" id="7FG2"/>
<dbReference type="PDBsum" id="7FG3"/>
<dbReference type="PDBsum" id="7FG7"/>
<dbReference type="PDBsum" id="7FH0"/>
<dbReference type="PDBsum" id="7FJC"/>
<dbReference type="PDBsum" id="7FJN"/>
<dbReference type="PDBsum" id="7FJO"/>
<dbReference type="PDBsum" id="7FJS"/>
<dbReference type="PDBsum" id="7JJC"/>
<dbReference type="PDBsum" id="7JJI"/>
<dbReference type="PDBsum" id="7JJJ"/>
<dbReference type="PDBsum" id="7JMO"/>
<dbReference type="PDBsum" id="7JMP"/>
<dbReference type="PDBsum" id="7JMW"/>
<dbReference type="PDBsum" id="7JV2"/>
<dbReference type="PDBsum" id="7JV4"/>
<dbReference type="PDBsum" id="7JV6"/>
<dbReference type="PDBsum" id="7JVA"/>
<dbReference type="PDBsum" id="7JVB"/>
<dbReference type="PDBsum" id="7JVC"/>
<dbReference type="PDBsum" id="7JW0"/>
<dbReference type="PDBsum" id="7JWB"/>
<dbReference type="PDBsum" id="7JWY"/>
<dbReference type="PDBsum" id="7JX3"/>
<dbReference type="PDBsum" id="7JZL"/>
<dbReference type="PDBsum" id="7JZM"/>
<dbReference type="PDBsum" id="7JZN"/>
<dbReference type="PDBsum" id="7JZU"/>
<dbReference type="PDBsum" id="7K43"/>
<dbReference type="PDBsum" id="7K45"/>
<dbReference type="PDBsum" id="7K4N"/>
<dbReference type="PDBsum" id="7K8M"/>
<dbReference type="PDBsum" id="7K8S"/>
<dbReference type="PDBsum" id="7K8T"/>
<dbReference type="PDBsum" id="7K8U"/>
<dbReference type="PDBsum" id="7K8V"/>
<dbReference type="PDBsum" id="7K8W"/>
<dbReference type="PDBsum" id="7K8X"/>
<dbReference type="PDBsum" id="7K8Y"/>
<dbReference type="PDBsum" id="7K8Z"/>
<dbReference type="PDBsum" id="7K90"/>
<dbReference type="PDBsum" id="7K9H"/>
<dbReference type="PDBsum" id="7K9I"/>
<dbReference type="PDBsum" id="7K9J"/>
<dbReference type="PDBsum" id="7K9K"/>
<dbReference type="PDBsum" id="7K9Z"/>
<dbReference type="PDBsum" id="7KDG"/>
<dbReference type="PDBsum" id="7KDH"/>
<dbReference type="PDBsum" id="7KDI"/>
<dbReference type="PDBsum" id="7KDJ"/>
<dbReference type="PDBsum" id="7KDK"/>
<dbReference type="PDBsum" id="7KDL"/>
<dbReference type="PDBsum" id="7KE4"/>
<dbReference type="PDBsum" id="7KE6"/>
<dbReference type="PDBsum" id="7KE7"/>
<dbReference type="PDBsum" id="7KE8"/>
<dbReference type="PDBsum" id="7KE9"/>
<dbReference type="PDBsum" id="7KEA"/>
<dbReference type="PDBsum" id="7KEB"/>
<dbReference type="PDBsum" id="7KEC"/>
<dbReference type="PDBsum" id="7KFV"/>
<dbReference type="PDBsum" id="7KFW"/>
<dbReference type="PDBsum" id="7KFX"/>
<dbReference type="PDBsum" id="7KFY"/>
<dbReference type="PDBsum" id="7KGJ"/>
<dbReference type="PDBsum" id="7KGK"/>
<dbReference type="PDBsum" id="7KJ2"/>
<dbReference type="PDBsum" id="7KJ3"/>
<dbReference type="PDBsum" id="7KJ4"/>
<dbReference type="PDBsum" id="7KJ5"/>
<dbReference type="PDBsum" id="7KKK"/>
<dbReference type="PDBsum" id="7KKL"/>
<dbReference type="PDBsum" id="7KL9"/>
<dbReference type="PDBsum" id="7KLG"/>
<dbReference type="PDBsum" id="7KLH"/>
<dbReference type="PDBsum" id="7KLW"/>
<dbReference type="PDBsum" id="7KM5"/>
<dbReference type="PDBsum" id="7KMB"/>
<dbReference type="PDBsum" id="7KMG"/>
<dbReference type="PDBsum" id="7KMH"/>
<dbReference type="PDBsum" id="7KMI"/>
<dbReference type="PDBsum" id="7KMK"/>
<dbReference type="PDBsum" id="7KML"/>
<dbReference type="PDBsum" id="7KMS"/>
<dbReference type="PDBsum" id="7KMZ"/>
<dbReference type="PDBsum" id="7KN3"/>
<dbReference type="PDBsum" id="7KN4"/>
<dbReference type="PDBsum" id="7KN5"/>
<dbReference type="PDBsum" id="7KN6"/>
<dbReference type="PDBsum" id="7KN7"/>
<dbReference type="PDBsum" id="7KNB"/>
<dbReference type="PDBsum" id="7KNE"/>
<dbReference type="PDBsum" id="7KNH"/>
<dbReference type="PDBsum" id="7KNI"/>
<dbReference type="PDBsum" id="7KQB"/>
<dbReference type="PDBsum" id="7KQE"/>
<dbReference type="PDBsum" id="7KRQ"/>
<dbReference type="PDBsum" id="7KRR"/>
<dbReference type="PDBsum" id="7KRS"/>
<dbReference type="PDBsum" id="7KS9"/>
<dbReference type="PDBsum" id="7KSG"/>
<dbReference type="PDBsum" id="7KXJ"/>
<dbReference type="PDBsum" id="7KXK"/>
<dbReference type="PDBsum" id="7KZB"/>
<dbReference type="PDBsum" id="7L02"/>
<dbReference type="PDBsum" id="7L06"/>
<dbReference type="PDBsum" id="7L09"/>
<dbReference type="PDBsum" id="7L0N"/>
<dbReference type="PDBsum" id="7L2C"/>
<dbReference type="PDBsum" id="7L2D"/>
<dbReference type="PDBsum" id="7L2E"/>
<dbReference type="PDBsum" id="7L2F"/>
<dbReference type="PDBsum" id="7L3N"/>
<dbReference type="PDBsum" id="7L4Z"/>
<dbReference type="PDBsum" id="7L56"/>
<dbReference type="PDBsum" id="7L57"/>
<dbReference type="PDBsum" id="7L58"/>
<dbReference type="PDBsum" id="7L5B"/>
<dbReference type="PDBsum" id="7L7D"/>
<dbReference type="PDBsum" id="7L7E"/>
<dbReference type="PDBsum" id="7L7F"/>
<dbReference type="PDBsum" id="7L7K"/>
<dbReference type="PDBsum" id="7LAA"/>
<dbReference type="PDBsum" id="7LAB"/>
<dbReference type="PDBsum" id="7LC8"/>
<dbReference type="PDBsum" id="7LCN"/>
<dbReference type="PDBsum" id="7LD1"/>
<dbReference type="PDBsum" id="7LDJ"/>
<dbReference type="PDBsum" id="7LJR"/>
<dbReference type="PDBsum" id="7LM8"/>
<dbReference type="PDBsum" id="7LO4"/>
<dbReference type="PDBsum" id="7LOP"/>
<dbReference type="PDBsum" id="7LQ7"/>
<dbReference type="PDBsum" id="7LQV"/>
<dbReference type="PDBsum" id="7LQW"/>
<dbReference type="PDBsum" id="7LRS"/>
<dbReference type="PDBsum" id="7LRT"/>
<dbReference type="PDBsum" id="7LS9"/>
<dbReference type="PDBsum" id="7LSS"/>
<dbReference type="PDBsum" id="7LWI"/>
<dbReference type="PDBsum" id="7LWJ"/>
<dbReference type="PDBsum" id="7LWK"/>
<dbReference type="PDBsum" id="7LWL"/>
<dbReference type="PDBsum" id="7LWM"/>
<dbReference type="PDBsum" id="7LWN"/>
<dbReference type="PDBsum" id="7LWO"/>
<dbReference type="PDBsum" id="7LWP"/>
<dbReference type="PDBsum" id="7LWQ"/>
<dbReference type="PDBsum" id="7LWS"/>
<dbReference type="PDBsum" id="7LWT"/>
<dbReference type="PDBsum" id="7LWU"/>
<dbReference type="PDBsum" id="7LWV"/>
<dbReference type="PDBsum" id="7LWW"/>
<dbReference type="PDBsum" id="7LX5"/>
<dbReference type="PDBsum" id="7LXW"/>
<dbReference type="PDBsum" id="7LXX"/>
<dbReference type="PDBsum" id="7LXY"/>
<dbReference type="PDBsum" id="7LXZ"/>
<dbReference type="PDBsum" id="7LY0"/>
<dbReference type="PDBsum" id="7LY2"/>
<dbReference type="PDBsum" id="7LY3"/>
<dbReference type="PDBsum" id="7LYK"/>
<dbReference type="PDBsum" id="7LYL"/>
<dbReference type="PDBsum" id="7LYM"/>
<dbReference type="PDBsum" id="7LYN"/>
<dbReference type="PDBsum" id="7LYO"/>
<dbReference type="PDBsum" id="7LYP"/>
<dbReference type="PDBsum" id="7LYQ"/>
<dbReference type="PDBsum" id="7M0J"/>
<dbReference type="PDBsum" id="7M3I"/>
<dbReference type="PDBsum" id="7M42"/>
<dbReference type="PDBsum" id="7M53"/>
<dbReference type="PDBsum" id="7M6D"/>
<dbReference type="PDBsum" id="7M6E"/>
<dbReference type="PDBsum" id="7M6F"/>
<dbReference type="PDBsum" id="7M6G"/>
<dbReference type="PDBsum" id="7M6H"/>
<dbReference type="PDBsum" id="7M6I"/>
<dbReference type="PDBsum" id="7M71"/>
<dbReference type="PDBsum" id="7M7B"/>
<dbReference type="PDBsum" id="7M7W"/>
<dbReference type="PDBsum" id="7M8J"/>
<dbReference type="PDBsum" id="7M8K"/>
<dbReference type="PDBsum" id="7M8S"/>
<dbReference type="PDBsum" id="7M8T"/>
<dbReference type="PDBsum" id="7M8U"/>
<dbReference type="PDBsum" id="7MDW"/>
<dbReference type="PDBsum" id="7ME7"/>
<dbReference type="PDBsum" id="7MEJ"/>
<dbReference type="PDBsum" id="7MF1"/>
<dbReference type="PDBsum" id="7MFU"/>
<dbReference type="PDBsum" id="7MJG"/>
<dbReference type="PDBsum" id="7MJH"/>
<dbReference type="PDBsum" id="7MJI"/>
<dbReference type="PDBsum" id="7MJJ"/>
<dbReference type="PDBsum" id="7MJK"/>
<dbReference type="PDBsum" id="7MJL"/>
<dbReference type="PDBsum" id="7MJM"/>
<dbReference type="PDBsum" id="7MJN"/>
<dbReference type="PDBsum" id="7MKB"/>
<dbReference type="PDBsum" id="7MKL"/>
<dbReference type="PDBsum" id="7MKM"/>
<dbReference type="PDBsum" id="7MLZ"/>
<dbReference type="PDBsum" id="7MM0"/>
<dbReference type="PDBsum" id="7MMO"/>
<dbReference type="PDBsum" id="7MSQ"/>
<dbReference type="PDBsum" id="7MTC"/>
<dbReference type="PDBsum" id="7MTD"/>
<dbReference type="PDBsum" id="7MTE"/>
<dbReference type="PDBsum" id="7MW2"/>
<dbReference type="PDBsum" id="7MW3"/>
<dbReference type="PDBsum" id="7MW4"/>
<dbReference type="PDBsum" id="7MW5"/>
<dbReference type="PDBsum" id="7MW6"/>
<dbReference type="PDBsum" id="7MXP"/>
<dbReference type="PDBsum" id="7MY2"/>
<dbReference type="PDBsum" id="7MY3"/>
<dbReference type="PDBsum" id="7MY8"/>
<dbReference type="PDBsum" id="7MZF"/>
<dbReference type="PDBsum" id="7MZG"/>
<dbReference type="PDBsum" id="7MZH"/>
<dbReference type="PDBsum" id="7MZI"/>
<dbReference type="PDBsum" id="7MZJ"/>
<dbReference type="PDBsum" id="7MZK"/>
<dbReference type="PDBsum" id="7MZL"/>
<dbReference type="PDBsum" id="7MZM"/>
<dbReference type="PDBsum" id="7MZN"/>
<dbReference type="PDBsum" id="7N0G"/>
<dbReference type="PDBsum" id="7N0H"/>
<dbReference type="PDBsum" id="7N1A"/>
<dbReference type="PDBsum" id="7N1B"/>
<dbReference type="PDBsum" id="7N1E"/>
<dbReference type="PDBsum" id="7N1F"/>
<dbReference type="PDBsum" id="7N1Q"/>
<dbReference type="PDBsum" id="7N1T"/>
<dbReference type="PDBsum" id="7N1U"/>
<dbReference type="PDBsum" id="7N1V"/>
<dbReference type="PDBsum" id="7N1W"/>
<dbReference type="PDBsum" id="7N1X"/>
<dbReference type="PDBsum" id="7N1Y"/>
<dbReference type="PDBsum" id="7N3I"/>
<dbReference type="PDBsum" id="7N4I"/>
<dbReference type="PDBsum" id="7N4J"/>
<dbReference type="PDBsum" id="7N4L"/>
<dbReference type="PDBsum" id="7N4M"/>
<dbReference type="PDBsum" id="7N5H"/>
<dbReference type="PDBsum" id="7N62"/>
<dbReference type="PDBsum" id="7N64"/>
<dbReference type="PDBsum" id="7N6D"/>
<dbReference type="PDBsum" id="7N6E"/>
<dbReference type="PDBsum" id="7N8H"/>
<dbReference type="PDBsum" id="7N8I"/>
<dbReference type="PDBsum" id="7N9A"/>
<dbReference type="PDBsum" id="7N9B"/>
<dbReference type="PDBsum" id="7N9C"/>
<dbReference type="PDBsum" id="7N9E"/>
<dbReference type="PDBsum" id="7N9T"/>
<dbReference type="PDBsum" id="7NAB"/>
<dbReference type="PDBsum" id="7ND3"/>
<dbReference type="PDBsum" id="7ND4"/>
<dbReference type="PDBsum" id="7ND5"/>
<dbReference type="PDBsum" id="7ND6"/>
<dbReference type="PDBsum" id="7ND7"/>
<dbReference type="PDBsum" id="7ND8"/>
<dbReference type="PDBsum" id="7ND9"/>
<dbReference type="PDBsum" id="7NDA"/>
<dbReference type="PDBsum" id="7NDB"/>
<dbReference type="PDBsum" id="7NDC"/>
<dbReference type="PDBsum" id="7NDD"/>
<dbReference type="PDBsum" id="7NEG"/>
<dbReference type="PDBsum" id="7NEH"/>
<dbReference type="PDBsum" id="7NKT"/>
<dbReference type="PDBsum" id="7NLL"/>
<dbReference type="PDBsum" id="7NP1"/>
<dbReference type="PDBsum" id="7NS6"/>
<dbReference type="PDBsum" id="7NT9"/>
<dbReference type="PDBsum" id="7NTA"/>
<dbReference type="PDBsum" id="7NTC"/>
<dbReference type="PDBsum" id="7NX6"/>
<dbReference type="PDBsum" id="7NX7"/>
<dbReference type="PDBsum" id="7NX8"/>
<dbReference type="PDBsum" id="7NX9"/>
<dbReference type="PDBsum" id="7NXA"/>
<dbReference type="PDBsum" id="7NXB"/>
<dbReference type="PDBsum" id="7NXC"/>
<dbReference type="PDBsum" id="7OAN"/>
<dbReference type="PDBsum" id="7OAO"/>
<dbReference type="PDBsum" id="7OAP"/>
<dbReference type="PDBsum" id="7OAQ"/>
<dbReference type="PDBsum" id="7OAU"/>
<dbReference type="PDBsum" id="7OAY"/>
<dbReference type="PDBsum" id="7OD3"/>
<dbReference type="PDBsum" id="7ODL"/>
<dbReference type="PDBsum" id="7OLZ"/>
<dbReference type="PDBsum" id="7OR9"/>
<dbReference type="PDBsum" id="7ORA"/>
<dbReference type="PDBsum" id="7ORB"/>
<dbReference type="PDBsum" id="7OWX"/>
<dbReference type="PDBsum" id="7P19"/>
<dbReference type="PDBsum" id="7P3D"/>
<dbReference type="PDBsum" id="7P3E"/>
<dbReference type="PDBsum" id="7P40"/>
<dbReference type="PDBsum" id="7P5G"/>
<dbReference type="PDBsum" id="7P5Q"/>
<dbReference type="PDBsum" id="7P5S"/>
<dbReference type="PDBsum" id="7P77"/>
<dbReference type="PDBsum" id="7P78"/>
<dbReference type="PDBsum" id="7P79"/>
<dbReference type="PDBsum" id="7P7A"/>
<dbReference type="PDBsum" id="7P7B"/>
<dbReference type="PDBsum" id="7PBE"/>
<dbReference type="PDBsum" id="7PHG"/>
<dbReference type="PDBsum" id="7PKI"/>
<dbReference type="PDBsum" id="7PQY"/>
<dbReference type="PDBsum" id="7PQZ"/>
<dbReference type="PDBsum" id="7PR0"/>
<dbReference type="PDBsum" id="7PRY"/>
<dbReference type="PDBsum" id="7PRZ"/>
<dbReference type="PDBsum" id="7PS0"/>
<dbReference type="PDBsum" id="7PS1"/>
<dbReference type="PDBsum" id="7PS2"/>
<dbReference type="PDBsum" id="7PS4"/>
<dbReference type="PDBsum" id="7PS5"/>
<dbReference type="PDBsum" id="7PS6"/>
<dbReference type="PDBsum" id="7PS7"/>
<dbReference type="PDBsum" id="7Q0A"/>
<dbReference type="PDBsum" id="7Q0G"/>
<dbReference type="PDBsum" id="7Q0H"/>
<dbReference type="PDBsum" id="7Q0I"/>
<dbReference type="PDBsum" id="7Q1Z"/>
<dbReference type="PDBsum" id="7Q3Q"/>
<dbReference type="PDBsum" id="7Q3R"/>
<dbReference type="PDBsum" id="7Q6E"/>
<dbReference type="PDBsum" id="7Q9F"/>
<dbReference type="PDBsum" id="7Q9G"/>
<dbReference type="PDBsum" id="7Q9I"/>
<dbReference type="PDBsum" id="7Q9J"/>
<dbReference type="PDBsum" id="7Q9K"/>
<dbReference type="PDBsum" id="7Q9M"/>
<dbReference type="PDBsum" id="7Q9P"/>
<dbReference type="PDBsum" id="7QDG"/>
<dbReference type="PDBsum" id="7QDH"/>
<dbReference type="PDBsum" id="7QEZ"/>
<dbReference type="PDBsum" id="7QF0"/>
<dbReference type="PDBsum" id="7QF1"/>
<dbReference type="PDBsum" id="7QNW"/>
<dbReference type="PDBsum" id="7QNX"/>
<dbReference type="PDBsum" id="7QNY"/>
<dbReference type="PDBsum" id="7QO7"/>
<dbReference type="PDBsum" id="7QO9"/>
<dbReference type="PDBsum" id="7QTI"/>
<dbReference type="PDBsum" id="7QUR"/>
<dbReference type="PDBsum" id="7QUS"/>
<dbReference type="PDBsum" id="7R0Z"/>
<dbReference type="PDBsum" id="7R10"/>
<dbReference type="PDBsum" id="7R11"/>
<dbReference type="PDBsum" id="7R12"/>
<dbReference type="PDBsum" id="7R13"/>
<dbReference type="PDBsum" id="7R14"/>
<dbReference type="PDBsum" id="7R15"/>
<dbReference type="PDBsum" id="7R16"/>
<dbReference type="PDBsum" id="7R17"/>
<dbReference type="PDBsum" id="7R18"/>
<dbReference type="PDBsum" id="7R19"/>
<dbReference type="PDBsum" id="7R1A"/>
<dbReference type="PDBsum" id="7R1B"/>
<dbReference type="PDBsum" id="7R40"/>
<dbReference type="PDBsum" id="7R4I"/>
<dbReference type="PDBsum" id="7R4Q"/>
<dbReference type="PDBsum" id="7R4R"/>
<dbReference type="PDBsum" id="7R6W"/>
<dbReference type="PDBsum" id="7R6X"/>
<dbReference type="PDBsum" id="7R7N"/>
<dbReference type="PDBsum" id="7R8L"/>
<dbReference type="PDBsum" id="7R8M"/>
<dbReference type="PDBsum" id="7R8N"/>
<dbReference type="PDBsum" id="7R8O"/>
<dbReference type="PDBsum" id="7R95"/>
<dbReference type="PDBsum" id="7RA8"/>
<dbReference type="PDBsum" id="7RAL"/>
<dbReference type="PDBsum" id="7RAQ"/>
<dbReference type="PDBsum" id="7RBU"/>
<dbReference type="PDBsum" id="7RBV"/>
<dbReference type="PDBsum" id="7RBY"/>
<dbReference type="PDBsum" id="7RKU"/>
<dbReference type="PDBsum" id="7RKV"/>
<dbReference type="PDBsum" id="7RNJ"/>
<dbReference type="PDBsum" id="7RPV"/>
<dbReference type="PDBsum" id="7RQ6"/>
<dbReference type="PDBsum" id="7RR0"/>
<dbReference type="PDBsum" id="7RTD"/>
<dbReference type="PDBsum" id="7RTR"/>
<dbReference type="PDBsum" id="7RU1"/>
<dbReference type="PDBsum" id="7RU2"/>
<dbReference type="PDBsum" id="7RU3"/>
<dbReference type="PDBsum" id="7RU4"/>
<dbReference type="PDBsum" id="7RU5"/>
<dbReference type="PDBsum" id="7RU8"/>
<dbReference type="PDBsum" id="7RW2"/>
<dbReference type="PDBsum" id="7RXD"/>
<dbReference type="PDBsum" id="7RZQ"/>
<dbReference type="PDBsum" id="7RZR"/>
<dbReference type="PDBsum" id="7RZS"/>
<dbReference type="PDBsum" id="7RZT"/>
<dbReference type="PDBsum" id="7RZU"/>
<dbReference type="PDBsum" id="7RZV"/>
<dbReference type="PDBsum" id="7S0B"/>
<dbReference type="PDBsum" id="7S0C"/>
<dbReference type="PDBsum" id="7S0D"/>
<dbReference type="PDBsum" id="7S0E"/>
<dbReference type="PDBsum" id="7S3N"/>
<dbReference type="PDBsum" id="7S4S"/>
<dbReference type="PDBsum" id="7S5P"/>
<dbReference type="PDBsum" id="7S5Q"/>
<dbReference type="PDBsum" id="7S5R"/>
<dbReference type="PDBsum" id="7S6I"/>
<dbReference type="PDBsum" id="7S6J"/>
<dbReference type="PDBsum" id="7S6K"/>
<dbReference type="PDBsum" id="7S6L"/>
<dbReference type="PDBsum" id="7S83"/>
<dbReference type="PDBsum" id="7SA2"/>
<dbReference type="PDBsum" id="7SBK"/>
<dbReference type="PDBsum" id="7SBL"/>
<dbReference type="PDBsum" id="7SBO"/>
<dbReference type="PDBsum" id="7SBP"/>
<dbReference type="PDBsum" id="7SBQ"/>
<dbReference type="PDBsum" id="7SBR"/>
<dbReference type="PDBsum" id="7SBS"/>
<dbReference type="PDBsum" id="7SBT"/>
<dbReference type="PDBsum" id="7SBU"/>
<dbReference type="PDBsum" id="7SC1"/>
<dbReference type="PDBsum" id="7SD5"/>
<dbReference type="PDBsum" id="7SI2"/>
<dbReference type="PDBsum" id="7SIS"/>
<dbReference type="PDBsum" id="7SJ0"/>
<dbReference type="PDBsum" id="7SJS"/>
<dbReference type="PDBsum" id="7SKZ"/>
<dbReference type="PDBsum" id="7SL5"/>
<dbReference type="PDBsum" id="7SN0"/>
<dbReference type="PDBsum" id="7SN2"/>
<dbReference type="PDBsum" id="7SN3"/>
<dbReference type="PDBsum" id="7SO9"/>
<dbReference type="PDBsum" id="7SOA"/>
<dbReference type="PDBsum" id="7SOB"/>
<dbReference type="PDBsum" id="7SOC"/>
<dbReference type="PDBsum" id="7SOD"/>
<dbReference type="PDBsum" id="7SOE"/>
<dbReference type="PDBsum" id="7SOF"/>
<dbReference type="PDBsum" id="7SPO"/>
<dbReference type="PDBsum" id="7SPP"/>
<dbReference type="PDBsum" id="7SWN"/>
<dbReference type="PDBsum" id="7SWO"/>
<dbReference type="PDBsum" id="7SWP"/>
<dbReference type="PDBsum" id="7SWW"/>
<dbReference type="PDBsum" id="7SWX"/>
<dbReference type="PDBsum" id="7SXR"/>
<dbReference type="PDBsum" id="7SXS"/>
<dbReference type="PDBsum" id="7SXT"/>
<dbReference type="PDBsum" id="7SXU"/>
<dbReference type="PDBsum" id="7SXV"/>
<dbReference type="PDBsum" id="7SXW"/>
<dbReference type="PDBsum" id="7SXX"/>
<dbReference type="PDBsum" id="7SXY"/>
<dbReference type="PDBsum" id="7SXZ"/>
<dbReference type="PDBsum" id="7SY0"/>
<dbReference type="PDBsum" id="7SY1"/>
<dbReference type="PDBsum" id="7SY2"/>
<dbReference type="PDBsum" id="7SY3"/>
<dbReference type="PDBsum" id="7SY4"/>
<dbReference type="PDBsum" id="7SY5"/>
<dbReference type="PDBsum" id="7SY6"/>
<dbReference type="PDBsum" id="7SY7"/>
<dbReference type="PDBsum" id="7SY8"/>
<dbReference type="PDBsum" id="7T01"/>
<dbReference type="PDBsum" id="7T3M"/>
<dbReference type="PDBsum" id="7T5O"/>
<dbReference type="PDBsum" id="7T67"/>
<dbReference type="PDBsum" id="7T72"/>
<dbReference type="PDBsum" id="7T7B"/>
<dbReference type="PDBsum" id="7T9J"/>
<dbReference type="PDBsum" id="7T9K"/>
<dbReference type="PDBsum" id="7T9L"/>
<dbReference type="PDBsum" id="7TAS"/>
<dbReference type="PDBsum" id="7TAT"/>
<dbReference type="PDBsum" id="7TB8"/>
<dbReference type="PDBsum" id="7TBF"/>
<dbReference type="PDBsum" id="7TC9"/>
<dbReference type="PDBsum" id="7TCA"/>
<dbReference type="PDBsum" id="7TCC"/>
<dbReference type="PDBsum" id="7TCQ"/>
<dbReference type="PDBsum" id="7TE1"/>
<dbReference type="PDBsum" id="7TEW"/>
<dbReference type="PDBsum" id="7TEX"/>
<dbReference type="PDBsum" id="7TEY"/>
<dbReference type="PDBsum" id="7TEZ"/>
<dbReference type="PDBsum" id="7TF0"/>
<dbReference type="PDBsum" id="7TF1"/>
<dbReference type="PDBsum" id="7TF2"/>
<dbReference type="PDBsum" id="7TF3"/>
<dbReference type="PDBsum" id="7TF4"/>
<dbReference type="PDBsum" id="7TF5"/>
<dbReference type="PDBsum" id="7TGE"/>
<dbReference type="PDBsum" id="7TGW"/>
<dbReference type="PDBsum" id="7TGX"/>
<dbReference type="PDBsum" id="7TGY"/>
<dbReference type="PDBsum" id="7THE"/>
<dbReference type="PDBsum" id="7THK"/>
<dbReference type="PDBsum" id="7THT"/>
<dbReference type="PDBsum" id="7TIK"/>
<dbReference type="PDBsum" id="7TLA"/>
<dbReference type="PDBsum" id="7TLB"/>
<dbReference type="PDBsum" id="7TLC"/>
<dbReference type="PDBsum" id="7TLD"/>
<dbReference type="PDBsum" id="7TLT"/>
<dbReference type="PDBsum" id="7TN0"/>
<dbReference type="PDBsum" id="7TOU"/>
<dbReference type="PDBsum" id="7TOV"/>
<dbReference type="PDBsum" id="7TOW"/>
<dbReference type="PDBsum" id="7TOX"/>
<dbReference type="PDBsum" id="7TOY"/>
<dbReference type="PDBsum" id="7TOZ"/>
<dbReference type="PDBsum" id="7TP0"/>
<dbReference type="PDBsum" id="7TP1"/>
<dbReference type="PDBsum" id="7TP2"/>
<dbReference type="PDBsum" id="7TP3"/>
<dbReference type="PDBsum" id="7TP4"/>
<dbReference type="PDBsum" id="7TP7"/>
<dbReference type="PDBsum" id="7TP8"/>
<dbReference type="PDBsum" id="7TP9"/>
<dbReference type="PDBsum" id="7TPA"/>
<dbReference type="PDBsum" id="7TPC"/>
<dbReference type="PDBsum" id="7TPE"/>
<dbReference type="PDBsum" id="7TPF"/>
<dbReference type="PDBsum" id="7TPH"/>
<dbReference type="PDBsum" id="7TPI"/>
<dbReference type="PDBsum" id="7TPK"/>
<dbReference type="PDBsum" id="7TPL"/>
<dbReference type="PDBsum" id="7TPR"/>
<dbReference type="PDBsum" id="7TYZ"/>
<dbReference type="PDBsum" id="7TZ0"/>
<dbReference type="PDBsum" id="7U0D"/>
<dbReference type="PDBsum" id="7U0P"/>
<dbReference type="PDBsum" id="7U0Q"/>
<dbReference type="PDBsum" id="7U0X"/>
<dbReference type="PDBsum" id="7U1R"/>
<dbReference type="PDBsum" id="7U2D"/>
<dbReference type="PDBsum" id="7U2E"/>
<dbReference type="PDBsum" id="7U8E"/>
<dbReference type="PDBsum" id="7U9O"/>
<dbReference type="PDBsum" id="7U9P"/>
<dbReference type="PDBsum" id="7UAP"/>
<dbReference type="PDBsum" id="7UAQ"/>
<dbReference type="PDBsum" id="7UAR"/>
<dbReference type="PDBsum" id="7UB0"/>
<dbReference type="PDBsum" id="7UB5"/>
<dbReference type="PDBsum" id="7UB6"/>
<dbReference type="PDBsum" id="7UFK"/>
<dbReference type="PDBsum" id="7UFL"/>
<dbReference type="PDBsum" id="7UHB"/>
<dbReference type="PDBsum" id="7UHC"/>
<dbReference type="PDBsum" id="7UKL"/>
<dbReference type="PDBsum" id="7UKM"/>
<dbReference type="PDBsum" id="7UL0"/>
<dbReference type="PDBsum" id="7UL1"/>
<dbReference type="PDBsum" id="7UM2"/>
<dbReference type="PDBsum" id="7UOW"/>
<dbReference type="PDBsum" id="7UPW"/>
<dbReference type="PDBsum" id="7UPX"/>
<dbReference type="PDBsum" id="7UPY"/>
<dbReference type="PDBsum" id="7UR1"/>
<dbReference type="PDBsum" id="7URQ"/>
<dbReference type="PDBsum" id="7URS"/>
<dbReference type="PDBsum" id="7UZ4"/>
<dbReference type="PDBsum" id="7UZ5"/>
<dbReference type="PDBsum" id="7UZ6"/>
<dbReference type="PDBsum" id="7UZ7"/>
<dbReference type="PDBsum" id="7UZ9"/>
<dbReference type="PDBsum" id="7UZA"/>
<dbReference type="PDBsum" id="7UZB"/>
<dbReference type="PDBsum" id="7UZC"/>
<dbReference type="PDBsum" id="7UZD"/>
<dbReference type="PDBsum" id="7V20"/>
<dbReference type="PDBsum" id="7V22"/>
<dbReference type="PDBsum" id="7V23"/>
<dbReference type="PDBsum" id="7V24"/>
<dbReference type="PDBsum" id="7V26"/>
<dbReference type="PDBsum" id="7V27"/>
<dbReference type="PDBsum" id="7V2A"/>
<dbReference type="PDBsum" id="7V76"/>
<dbReference type="PDBsum" id="7V77"/>
<dbReference type="PDBsum" id="7V78"/>
<dbReference type="PDBsum" id="7V79"/>
<dbReference type="PDBsum" id="7V7A"/>
<dbReference type="PDBsum" id="7V7D"/>
<dbReference type="PDBsum" id="7V7E"/>
<dbReference type="PDBsum" id="7V7F"/>
<dbReference type="PDBsum" id="7V7G"/>
<dbReference type="PDBsum" id="7V7H"/>
<dbReference type="PDBsum" id="7V7I"/>
<dbReference type="PDBsum" id="7V7J"/>
<dbReference type="PDBsum" id="7V7N"/>
<dbReference type="PDBsum" id="7V7O"/>
<dbReference type="PDBsum" id="7V7P"/>
<dbReference type="PDBsum" id="7V7Q"/>
<dbReference type="PDBsum" id="7V7R"/>
<dbReference type="PDBsum" id="7V7S"/>
<dbReference type="PDBsum" id="7V7T"/>
<dbReference type="PDBsum" id="7V7U"/>
<dbReference type="PDBsum" id="7V7V"/>
<dbReference type="PDBsum" id="7V7Z"/>
<dbReference type="PDBsum" id="7V80"/>
<dbReference type="PDBsum" id="7V81"/>
<dbReference type="PDBsum" id="7V82"/>
<dbReference type="PDBsum" id="7V83"/>
<dbReference type="PDBsum" id="7V84"/>
<dbReference type="PDBsum" id="7V85"/>
<dbReference type="PDBsum" id="7V86"/>
<dbReference type="PDBsum" id="7V87"/>
<dbReference type="PDBsum" id="7V88"/>
<dbReference type="PDBsum" id="7V89"/>
<dbReference type="PDBsum" id="7V8A"/>
<dbReference type="PDBsum" id="7V8B"/>
<dbReference type="PDBsum" id="7V8C"/>
<dbReference type="PDBsum" id="7VHH"/>
<dbReference type="PDBsum" id="7VHJ"/>
<dbReference type="PDBsum" id="7VHK"/>
<dbReference type="PDBsum" id="7VHL"/>
<dbReference type="PDBsum" id="7VHM"/>
<dbReference type="PDBsum" id="7VHN"/>
<dbReference type="PDBsum" id="7VMU"/>
<dbReference type="PDBsum" id="7VNB"/>
<dbReference type="PDBsum" id="7VNC"/>
<dbReference type="PDBsum" id="7VND"/>
<dbReference type="PDBsum" id="7VNE"/>
<dbReference type="PDBsum" id="7VOA"/>
<dbReference type="PDBsum" id="7VQ0"/>
<dbReference type="PDBsum" id="7VRV"/>
<dbReference type="PDBsum" id="7VRW"/>
<dbReference type="PDBsum" id="7VX1"/>
<dbReference type="PDBsum" id="7VX4"/>
<dbReference type="PDBsum" id="7VX5"/>
<dbReference type="PDBsum" id="7VX9"/>
<dbReference type="PDBsum" id="7VXA"/>
<dbReference type="PDBsum" id="7VXB"/>
<dbReference type="PDBsum" id="7VXC"/>
<dbReference type="PDBsum" id="7VXD"/>
<dbReference type="PDBsum" id="7VXE"/>
<dbReference type="PDBsum" id="7VXF"/>
<dbReference type="PDBsum" id="7VXI"/>
<dbReference type="PDBsum" id="7VXK"/>
<dbReference type="PDBsum" id="7VXM"/>
<dbReference type="PDBsum" id="7VYR"/>
<dbReference type="PDBsum" id="7VZT"/>
<dbReference type="PDBsum" id="7W1S"/>
<dbReference type="PDBsum" id="7W6U"/>
<dbReference type="PDBsum" id="7W8S"/>
<dbReference type="PDBsum" id="7W92"/>
<dbReference type="PDBsum" id="7W94"/>
<dbReference type="PDBsum" id="7W98"/>
<dbReference type="PDBsum" id="7W99"/>
<dbReference type="PDBsum" id="7W9B"/>
<dbReference type="PDBsum" id="7W9C"/>
<dbReference type="PDBsum" id="7W9E"/>
<dbReference type="PDBsum" id="7W9F"/>
<dbReference type="PDBsum" id="7W9I"/>
<dbReference type="PDBsum" id="7WA1"/>
<dbReference type="PDBsum" id="7WB5"/>
<dbReference type="PDBsum" id="7WBH"/>
<dbReference type="PDBsum" id="7WBL"/>
<dbReference type="PDBsum" id="7WBP"/>
<dbReference type="PDBsum" id="7WBQ"/>
<dbReference type="PDBsum" id="7WBZ"/>
<dbReference type="PDBsum" id="7WCD"/>
<dbReference type="PDBsum" id="7WCH"/>
<dbReference type="PDBsum" id="7WCK"/>
<dbReference type="PDBsum" id="7WCP"/>
<dbReference type="PDBsum" id="7WCR"/>
<dbReference type="PDBsum" id="7WCU"/>
<dbReference type="PDBsum" id="7WCZ"/>
<dbReference type="PDBsum" id="7WD0"/>
<dbReference type="PDBsum" id="7WD1"/>
<dbReference type="PDBsum" id="7WD2"/>
<dbReference type="PDBsum" id="7WD7"/>
<dbReference type="PDBsum" id="7WD8"/>
<dbReference type="PDBsum" id="7WD9"/>
<dbReference type="PDBsum" id="7WDF"/>
<dbReference type="PDBsum" id="7WED"/>
<dbReference type="PDBsum" id="7WEF"/>
<dbReference type="PDBsum" id="7WEV"/>
<dbReference type="PDBsum" id="7WG7"/>
<dbReference type="PDBsum" id="7WG8"/>
<dbReference type="PDBsum" id="7WG9"/>
<dbReference type="PDBsum" id="7WGB"/>
<dbReference type="PDBsum" id="7WGC"/>
<dbReference type="PDBsum" id="7WGV"/>
<dbReference type="PDBsum" id="7WGX"/>
<dbReference type="PDBsum" id="7WGY"/>
<dbReference type="PDBsum" id="7WGZ"/>
<dbReference type="PDBsum" id="7WH8"/>
<dbReference type="PDBsum" id="7WHB"/>
<dbReference type="PDBsum" id="7WHD"/>
<dbReference type="PDBsum" id="7WHH"/>
<dbReference type="PDBsum" id="7WHJ"/>
<dbReference type="PDBsum" id="7WHZ"/>
<dbReference type="PDBsum" id="7WI0"/>
<dbReference type="PDBsum" id="7WK0"/>
<dbReference type="PDBsum" id="7WK2"/>
<dbReference type="PDBsum" id="7WK3"/>
<dbReference type="PDBsum" id="7WK8"/>
<dbReference type="PDBsum" id="7WK9"/>
<dbReference type="PDBsum" id="7WKA"/>
<dbReference type="PDBsum" id="7WLC"/>
<dbReference type="PDBsum" id="7WN2"/>
<dbReference type="PDBsum" id="7WNB"/>
<dbReference type="PDBsum" id="7WNM"/>
<dbReference type="PDBsum" id="7WO4"/>
<dbReference type="PDBsum" id="7WO5"/>
<dbReference type="PDBsum" id="7WO7"/>
<dbReference type="PDBsum" id="7WOA"/>
<dbReference type="PDBsum" id="7WOB"/>
<dbReference type="PDBsum" id="7WOC"/>
<dbReference type="PDBsum" id="7WOG"/>
<dbReference type="PDBsum" id="7WON"/>
<dbReference type="PDBsum" id="7WOP"/>
<dbReference type="PDBsum" id="7WP0"/>
<dbReference type="PDBsum" id="7WP1"/>
<dbReference type="PDBsum" id="7WP2"/>
<dbReference type="PDBsum" id="7WP5"/>
<dbReference type="PDBsum" id="7WP6"/>
<dbReference type="PDBsum" id="7WP8"/>
<dbReference type="PDBsum" id="7WPH"/>
<dbReference type="PDBsum" id="7WQV"/>
<dbReference type="PDBsum" id="7WR8"/>
<dbReference type="PDBsum" id="7WRJ"/>
<dbReference type="PDBsum" id="7WRL"/>
<dbReference type="PDBsum" id="7WRO"/>
<dbReference type="PDBsum" id="7WRY"/>
<dbReference type="PDBsum" id="7WRZ"/>
<dbReference type="PDBsum" id="7WS0"/>
<dbReference type="PDBsum" id="7WS1"/>
<dbReference type="PDBsum" id="7WS2"/>
<dbReference type="PDBsum" id="7WS3"/>
<dbReference type="PDBsum" id="7WS6"/>
<dbReference type="PDBsum" id="7WS7"/>
<dbReference type="PDBsum" id="7WSA"/>
<dbReference type="PDBsum" id="7WSC"/>
<dbReference type="PDBsum" id="7WSE"/>
<dbReference type="PDBsum" id="7WSH"/>
<dbReference type="PDBsum" id="7WSK"/>
<dbReference type="PDBsum" id="7WT9"/>
<dbReference type="PDBsum" id="7WTG"/>
<dbReference type="PDBsum" id="7WTH"/>
<dbReference type="PDBsum" id="7WTJ"/>
<dbReference type="PDBsum" id="7WUE"/>
<dbReference type="PDBsum" id="7WUH"/>
<dbReference type="PDBsum" id="7WVL"/>
<dbReference type="PDBsum" id="7WVN"/>
<dbReference type="PDBsum" id="7WVO"/>
<dbReference type="PDBsum" id="7WVP"/>
<dbReference type="PDBsum" id="7WVQ"/>
<dbReference type="PDBsum" id="7WWK"/>
<dbReference type="PDBsum" id="7WWL"/>
<dbReference type="PDBsum" id="7WWM"/>
<dbReference type="PDBsum" id="7WZ1"/>
<dbReference type="PDBsum" id="7WZ2"/>
<dbReference type="PDBsum" id="7X08"/>
<dbReference type="PDBsum" id="7X1M"/>
<dbReference type="PDBsum" id="7X2H"/>
<dbReference type="PDBsum" id="7X2K"/>
<dbReference type="PDBsum" id="7X2L"/>
<dbReference type="PDBsum" id="7X2M"/>
<dbReference type="PDBsum" id="7X63"/>
<dbReference type="PDBsum" id="7X66"/>
<dbReference type="PDBsum" id="7X6A"/>
<dbReference type="PDBsum" id="7X7D"/>
<dbReference type="PDBsum" id="7X7E"/>
<dbReference type="PDBsum" id="7X7N"/>
<dbReference type="PDBsum" id="7X7O"/>
<dbReference type="PDBsum" id="7X7T"/>
<dbReference type="PDBsum" id="7X7U"/>
<dbReference type="PDBsum" id="7X8W"/>
<dbReference type="PDBsum" id="7X8Y"/>
<dbReference type="PDBsum" id="7X8Z"/>
<dbReference type="PDBsum" id="7X90"/>
<dbReference type="PDBsum" id="7X91"/>
<dbReference type="PDBsum" id="7X92"/>
<dbReference type="PDBsum" id="7X93"/>
<dbReference type="PDBsum" id="7X94"/>
<dbReference type="PDBsum" id="7X95"/>
<dbReference type="PDBsum" id="7X96"/>
<dbReference type="PDBsum" id="7X9E"/>
<dbReference type="PDBsum" id="7XA7"/>
<dbReference type="PDBsum" id="7XAZ"/>
<dbReference type="PDBsum" id="7XB0"/>
<dbReference type="PDBsum" id="7XB1"/>
<dbReference type="PDBsum" id="7XBY"/>
<dbReference type="PDBsum" id="7XCI"/>
<dbReference type="PDBsum" id="7XCK"/>
<dbReference type="PDBsum" id="7XCP"/>
<dbReference type="PDBsum" id="7XCZ"/>
<dbReference type="PDBsum" id="7XD2"/>
<dbReference type="PDBsum" id="7XDA"/>
<dbReference type="PDBsum" id="7XDK"/>
<dbReference type="PDBsum" id="7XDL"/>
<dbReference type="PDBsum" id="7XEG"/>
<dbReference type="PDBsum" id="7XEI"/>
<dbReference type="PDBsum" id="7XIK"/>
<dbReference type="PDBsum" id="7XIL"/>
<dbReference type="PDBsum" id="7XIW"/>
<dbReference type="PDBsum" id="7XIX"/>
<dbReference type="PDBsum" id="7XIY"/>
<dbReference type="PDBsum" id="7XIZ"/>
<dbReference type="PDBsum" id="7XJ9"/>
<dbReference type="PDBsum" id="7XMX"/>
<dbReference type="PDBsum" id="7XMZ"/>
<dbReference type="PDBsum" id="7XNQ"/>
<dbReference type="PDBsum" id="7XNR"/>
<dbReference type="PDBsum" id="7XNS"/>
<dbReference type="PDBsum" id="7XO7"/>
<dbReference type="PDBsum" id="7XO8"/>
<dbReference type="PDBsum" id="7XO9"/>
<dbReference type="PDBsum" id="7XOA"/>
<dbReference type="PDBsum" id="7XOB"/>
<dbReference type="PDBsum" id="7XOC"/>
<dbReference type="PDBsum" id="7XOD"/>
<dbReference type="PDBsum" id="7XOE"/>
<dbReference type="PDBsum" id="7XOG"/>
<dbReference type="PDBsum" id="7XQS"/>
<dbReference type="PDBsum" id="7XRP"/>
<dbReference type="PDBsum" id="7XS8"/>
<dbReference type="PDBsum" id="7XSA"/>
<dbReference type="PDBsum" id="7XSB"/>
<dbReference type="PDBsum" id="7XSC"/>
<dbReference type="PDBsum" id="7XST"/>
<dbReference type="PDBsum" id="7XTZ"/>
<dbReference type="PDBsum" id="7XU0"/>
<dbReference type="PDBsum" id="7XU1"/>
<dbReference type="PDBsum" id="7XU2"/>
<dbReference type="PDBsum" id="7XU3"/>
<dbReference type="PDBsum" id="7XU4"/>
<dbReference type="PDBsum" id="7XU5"/>
<dbReference type="PDBsum" id="7XU6"/>
<dbReference type="PDBsum" id="7XWA"/>
<dbReference type="PDBsum" id="7XXL"/>
<dbReference type="PDBsum" id="7XY3"/>
<dbReference type="PDBsum" id="7XY4"/>
<dbReference type="PDBsum" id="7Y0C"/>
<dbReference type="PDBsum" id="7Y0N"/>
<dbReference type="PDBsum" id="7Y0O"/>
<dbReference type="PDBsum" id="7Y0V"/>
<dbReference type="PDBsum" id="7Y0W"/>
<dbReference type="PDBsum" id="7Y1Y"/>
<dbReference type="PDBsum" id="7Y1Z"/>
<dbReference type="PDBsum" id="7Y20"/>
<dbReference type="PDBsum" id="7Y21"/>
<dbReference type="PDBsum" id="7Y3O"/>
<dbReference type="PDBsum" id="7Y42"/>
<dbReference type="PDBsum" id="7Y6D"/>
<dbReference type="PDBsum" id="7Y6K"/>
<dbReference type="PDBsum" id="7Y6L"/>
<dbReference type="PDBsum" id="7Y6N"/>
<dbReference type="PDBsum" id="7Y71"/>
<dbReference type="PDBsum" id="7Y72"/>
<dbReference type="PDBsum" id="7Y75"/>
<dbReference type="PDBsum" id="7Y76"/>
<dbReference type="PDBsum" id="7Y7J"/>
<dbReference type="PDBsum" id="7Y7K"/>
<dbReference type="PDBsum" id="7Y8J"/>
<dbReference type="PDBsum" id="7YA1"/>
<dbReference type="PDBsum" id="7YAD"/>
<dbReference type="PDBsum" id="7YBH"/>
<dbReference type="PDBsum" id="7YBI"/>
<dbReference type="PDBsum" id="7YBJ"/>
<dbReference type="PDBsum" id="7YBK"/>
<dbReference type="PDBsum" id="7YBL"/>
<dbReference type="PDBsum" id="7YBM"/>
<dbReference type="PDBsum" id="7YBN"/>
<dbReference type="PDBsum" id="7YC5"/>
<dbReference type="PDBsum" id="7YCK"/>
<dbReference type="PDBsum" id="7YCL"/>
<dbReference type="PDBsum" id="7YCN"/>
<dbReference type="PDBsum" id="7YCO"/>
<dbReference type="PDBsum" id="7YD1"/>
<dbReference type="PDBsum" id="7YDI"/>
<dbReference type="PDBsum" id="7YDY"/>
<dbReference type="PDBsum" id="7YE5"/>
<dbReference type="PDBsum" id="7YE9"/>
<dbReference type="PDBsum" id="7YEG"/>
<dbReference type="PDBsum" id="7YH6"/>
<dbReference type="PDBsum" id="7YH7"/>
<dbReference type="PDBsum" id="7YHW"/>
<dbReference type="PDBsum" id="7YJ3"/>
<dbReference type="PDBsum" id="7YOW"/>
<dbReference type="PDBsum" id="7YQT"/>
<dbReference type="PDBsum" id="7YQU"/>
<dbReference type="PDBsum" id="7YQV"/>
<dbReference type="PDBsum" id="7YQW"/>
<dbReference type="PDBsum" id="7YQX"/>
<dbReference type="PDBsum" id="7YQY"/>
<dbReference type="PDBsum" id="7YQZ"/>
<dbReference type="PDBsum" id="7YR0"/>
<dbReference type="PDBsum" id="7YR1"/>
<dbReference type="PDBsum" id="7YR2"/>
<dbReference type="PDBsum" id="7YR3"/>
<dbReference type="PDBsum" id="7YR4"/>
<dbReference type="PDBsum" id="7YTN"/>
<dbReference type="PDBsum" id="7YUE"/>
<dbReference type="PDBsum" id="7YV8"/>
<dbReference type="PDBsum" id="7YVE"/>
<dbReference type="PDBsum" id="7YVF"/>
<dbReference type="PDBsum" id="7YVG"/>
<dbReference type="PDBsum" id="7YVH"/>
<dbReference type="PDBsum" id="7YVI"/>
<dbReference type="PDBsum" id="7YVJ"/>
<dbReference type="PDBsum" id="7YVK"/>
<dbReference type="PDBsum" id="7YVL"/>
<dbReference type="PDBsum" id="7YVM"/>
<dbReference type="PDBsum" id="7YVN"/>
<dbReference type="PDBsum" id="7YVO"/>
<dbReference type="PDBsum" id="7YVP"/>
<dbReference type="PDBsum" id="7YVU"/>
<dbReference type="PDBsum" id="7Z0X"/>
<dbReference type="PDBsum" id="7Z0Y"/>
<dbReference type="PDBsum" id="7Z1A"/>
<dbReference type="PDBsum" id="7Z1B"/>
<dbReference type="PDBsum" id="7Z1C"/>
<dbReference type="PDBsum" id="7Z1D"/>
<dbReference type="PDBsum" id="7Z1E"/>
<dbReference type="PDBsum" id="7Z3Z"/>
<dbReference type="PDBsum" id="7Z6V"/>
<dbReference type="PDBsum" id="7Z7X"/>
<dbReference type="PDBsum" id="7Z85"/>
<dbReference type="PDBsum" id="7Z86"/>
<dbReference type="PDBsum" id="7Z8O"/>
<dbReference type="PDBsum" id="7Z9Q"/>
<dbReference type="PDBsum" id="7Z9R"/>
<dbReference type="PDBsum" id="7ZBU"/>
<dbReference type="PDBsum" id="7ZCE"/>
<dbReference type="PDBsum" id="7ZCF"/>
<dbReference type="PDBsum" id="7ZDQ"/>
<dbReference type="PDBsum" id="7ZF3"/>
<dbReference type="PDBsum" id="7ZF4"/>
<dbReference type="PDBsum" id="7ZF5"/>
<dbReference type="PDBsum" id="7ZF7"/>
<dbReference type="PDBsum" id="7ZF8"/>
<dbReference type="PDBsum" id="7ZF9"/>
<dbReference type="PDBsum" id="7ZFA"/>
<dbReference type="PDBsum" id="7ZFB"/>
<dbReference type="PDBsum" id="7ZFC"/>
<dbReference type="PDBsum" id="7ZFD"/>
<dbReference type="PDBsum" id="7ZFE"/>
<dbReference type="PDBsum" id="7ZJL"/>
<dbReference type="PDBsum" id="7ZR2"/>
<dbReference type="PDBsum" id="7ZR7"/>
<dbReference type="PDBsum" id="7ZR8"/>
<dbReference type="PDBsum" id="7ZR9"/>
<dbReference type="PDBsum" id="7ZRC"/>
<dbReference type="PDBsum" id="7ZRV"/>
<dbReference type="PDBsum" id="7ZSD"/>
<dbReference type="PDBsum" id="7ZSS"/>
<dbReference type="PDBsum" id="7ZXU"/>
<dbReference type="PDBsum" id="8A94"/>
<dbReference type="PDBsum" id="8A95"/>
<dbReference type="PDBsum" id="8A96"/>
<dbReference type="PDBsum" id="8A99"/>
<dbReference type="PDBsum" id="8AAA"/>
<dbReference type="PDBsum" id="8AQS"/>
<dbReference type="PDBsum" id="8AQT"/>
<dbReference type="PDBsum" id="8AQU"/>
<dbReference type="PDBsum" id="8AQV"/>
<dbReference type="PDBsum" id="8AQW"/>
<dbReference type="PDBsum" id="8ASY"/>
<dbReference type="PDBsum" id="8BBN"/>
<dbReference type="PDBsum" id="8BCZ"/>
<dbReference type="PDBsum" id="8BE1"/>
<dbReference type="PDBsum" id="8BEC"/>
<dbReference type="PDBsum" id="8BEV"/>
<dbReference type="PDBsum" id="8BG1"/>
<dbReference type="PDBsum" id="8BG2"/>
<dbReference type="PDBsum" id="8BG3"/>
<dbReference type="PDBsum" id="8BG4"/>
<dbReference type="PDBsum" id="8BG5"/>
<dbReference type="PDBsum" id="8BG6"/>
<dbReference type="PDBsum" id="8BG8"/>
<dbReference type="PDBsum" id="8BGG"/>
<dbReference type="PDBsum" id="8BH5"/>
<dbReference type="PDBsum" id="8BON"/>
<dbReference type="PDBsum" id="8BSE"/>
<dbReference type="PDBsum" id="8BSF"/>
<dbReference type="PDBsum" id="8C0Y"/>
<dbReference type="PDBsum" id="8C1V"/>
<dbReference type="PDBsum" id="8C2R"/>
<dbReference type="PDBsum" id="8C3V"/>
<dbReference type="PDBsum" id="8C5R"/>
<dbReference type="PDBsum" id="8C89"/>
<dbReference type="PDBsum" id="8C8P"/>
<dbReference type="PDBsum" id="8CBD"/>
<dbReference type="PDBsum" id="8CBE"/>
<dbReference type="PDBsum" id="8CBF"/>
<dbReference type="PDBsum" id="8CII"/>
<dbReference type="PDBsum" id="8CIM"/>
<dbReference type="PDBsum" id="8CIN"/>
<dbReference type="PDBsum" id="8CMA"/>
<dbReference type="PDBsum" id="8CMB"/>
<dbReference type="PDBsum" id="8CMC"/>
<dbReference type="PDBsum" id="8CMD"/>
<dbReference type="PDBsum" id="8CMH"/>
<dbReference type="PDBsum" id="8CMI"/>
<dbReference type="PDBsum" id="8CSA"/>
<dbReference type="PDBsum" id="8CSJ"/>
<dbReference type="PDBsum" id="8CWI"/>
<dbReference type="PDBsum" id="8CWK"/>
<dbReference type="PDBsum" id="8CWU"/>
<dbReference type="PDBsum" id="8CWV"/>
<dbReference type="PDBsum" id="8CXN"/>
<dbReference type="PDBsum" id="8CXQ"/>
<dbReference type="PDBsum" id="8CY6"/>
<dbReference type="PDBsum" id="8CY7"/>
<dbReference type="PDBsum" id="8CY9"/>
<dbReference type="PDBsum" id="8CYA"/>
<dbReference type="PDBsum" id="8CYB"/>
<dbReference type="PDBsum" id="8CYC"/>
<dbReference type="PDBsum" id="8CYD"/>
<dbReference type="PDBsum" id="8CYJ"/>
<dbReference type="PDBsum" id="8CZI"/>
<dbReference type="PDBsum" id="8D0Z"/>
<dbReference type="PDBsum" id="8D36"/>
<dbReference type="PDBsum" id="8D47"/>
<dbReference type="PDBsum" id="8D48"/>
<dbReference type="PDBsum" id="8D55"/>
<dbReference type="PDBsum" id="8D56"/>
<dbReference type="PDBsum" id="8D5A"/>
<dbReference type="PDBsum" id="8D6Z"/>
<dbReference type="PDBsum" id="8D8Q"/>
<dbReference type="PDBsum" id="8D8R"/>
<dbReference type="PDBsum" id="8DAD"/>
<dbReference type="PDBsum" id="8DAO"/>
<dbReference type="PDBsum" id="8DCC"/>
<dbReference type="PDBsum" id="8DCE"/>
<dbReference type="PDBsum" id="8DF5"/>
<dbReference type="PDBsum" id="8DGU"/>
<dbReference type="PDBsum" id="8DI5"/>
<dbReference type="PDBsum" id="8DLI"/>
<dbReference type="PDBsum" id="8DLJ"/>
<dbReference type="PDBsum" id="8DLK"/>
<dbReference type="PDBsum" id="8DLL"/>
<dbReference type="PDBsum" id="8DLM"/>
<dbReference type="PDBsum" id="8DLN"/>
<dbReference type="PDBsum" id="8DLO"/>
<dbReference type="PDBsum" id="8DLP"/>
<dbReference type="PDBsum" id="8DLQ"/>
<dbReference type="PDBsum" id="8DLR"/>
<dbReference type="PDBsum" id="8DLS"/>
<dbReference type="PDBsum" id="8DLT"/>
<dbReference type="PDBsum" id="8DLU"/>
<dbReference type="PDBsum" id="8DLV"/>
<dbReference type="PDBsum" id="8DLW"/>
<dbReference type="PDBsum" id="8DLX"/>
<dbReference type="PDBsum" id="8DLY"/>
<dbReference type="PDBsum" id="8DLZ"/>
<dbReference type="PDBsum" id="8DM0"/>
<dbReference type="PDBsum" id="8DM1"/>
<dbReference type="PDBsum" id="8DM2"/>
<dbReference type="PDBsum" id="8DM3"/>
<dbReference type="PDBsum" id="8DM4"/>
<dbReference type="PDBsum" id="8DM5"/>
<dbReference type="PDBsum" id="8DM6"/>
<dbReference type="PDBsum" id="8DM7"/>
<dbReference type="PDBsum" id="8DM8"/>
<dbReference type="PDBsum" id="8DM9"/>
<dbReference type="PDBsum" id="8DMA"/>
<dbReference type="PDBsum" id="8DNN"/>
<dbReference type="PDBsum" id="8DPZ"/>
<dbReference type="PDBsum" id="8DT3"/>
<dbReference type="PDBsum" id="8DT8"/>
<dbReference type="PDBsum" id="8DTK"/>
<dbReference type="PDBsum" id="8DTR"/>
<dbReference type="PDBsum" id="8DTT"/>
<dbReference type="PDBsum" id="8DTX"/>
<dbReference type="PDBsum" id="8DV1"/>
<dbReference type="PDBsum" id="8DV2"/>
<dbReference type="PDBsum" id="8DW2"/>
<dbReference type="PDBsum" id="8DW3"/>
<dbReference type="PDBsum" id="8DW9"/>
<dbReference type="PDBsum" id="8DWA"/>
<dbReference type="PDBsum" id="8DXS"/>
<dbReference type="PDBsum" id="8DXT"/>
<dbReference type="PDBsum" id="8DXU"/>
<dbReference type="PDBsum" id="8DYA"/>
<dbReference type="PDBsum" id="8DZH"/>
<dbReference type="PDBsum" id="8DZI"/>
<dbReference type="PDBsum" id="8E1G"/>
<dbReference type="PDBsum" id="8EDF"/>
<dbReference type="PDBsum" id="8EKD"/>
<dbReference type="PDBsum" id="8EL2"/>
<dbReference type="PDBsum" id="8ELH"/>
<dbReference type="PDBsum" id="8ELJ"/>
<dbReference type="PDBsum" id="8ELO"/>
<dbReference type="PDBsum" id="8ELP"/>
<dbReference type="PDBsum" id="8ELQ"/>
<dbReference type="PDBsum" id="8ENS"/>
<dbReference type="PDBsum" id="8ENW"/>
<dbReference type="PDBsum" id="8ENX"/>
<dbReference type="PDBsum" id="8EOO"/>
<dbReference type="PDBsum" id="8EPN"/>
<dbReference type="PDBsum" id="8EPP"/>
<dbReference type="PDBsum" id="8EPQ"/>
<dbReference type="PDBsum" id="8EQF"/>
<dbReference type="PDBsum" id="8EYG"/>
<dbReference type="PDBsum" id="8EYH"/>
<dbReference type="PDBsum" id="8F0G"/>
<dbReference type="PDBsum" id="8F0H"/>
<dbReference type="PDBsum" id="8F0I"/>
<dbReference type="PDBsum" id="8F2J"/>
<dbReference type="PDBsum" id="8F2X"/>
<dbReference type="PDBsum" id="8F4P"/>
<dbReference type="PDBsum" id="8FA1"/>
<dbReference type="PDBsum" id="8FA2"/>
<dbReference type="PDBsum" id="8FAH"/>
<dbReference type="PDBsum" id="8FDW"/>
<dbReference type="PDBsum" id="8FEZ"/>
<dbReference type="PDBsum" id="8FHY"/>
<dbReference type="PDBsum" id="8FI9"/>
<dbReference type="PDBsum" id="8FU7"/>
<dbReference type="PDBsum" id="8FU8"/>
<dbReference type="PDBsum" id="8FU9"/>
<dbReference type="PDBsum" id="8FXB"/>
<dbReference type="PDBsum" id="8FXC"/>
<dbReference type="PDBsum" id="8G70"/>
<dbReference type="PDBsum" id="8G71"/>
<dbReference type="PDBsum" id="8G72"/>
<dbReference type="PDBsum" id="8G73"/>
<dbReference type="PDBsum" id="8G74"/>
<dbReference type="PDBsum" id="8G75"/>
<dbReference type="PDBsum" id="8G76"/>
<dbReference type="PDBsum" id="8G77"/>
<dbReference type="PDBsum" id="8G78"/>
<dbReference type="PDBsum" id="8G79"/>
<dbReference type="PDBsum" id="8G7A"/>
<dbReference type="PDBsum" id="8G7B"/>
<dbReference type="PDBsum" id="8G7C"/>
<dbReference type="PDBsum" id="8GB0"/>
<dbReference type="PDBsum" id="8GB5"/>
<dbReference type="PDBsum" id="8GB6"/>
<dbReference type="PDBsum" id="8GB7"/>
<dbReference type="PDBsum" id="8GB8"/>
<dbReference type="PDBsum" id="8GDR"/>
<dbReference type="PDBsum" id="8GF2"/>
<dbReference type="PDBsum" id="8GJM"/>
<dbReference type="PDBsum" id="8GJN"/>
<dbReference type="PDBsum" id="8GNH"/>
<dbReference type="PDBsum" id="8GOM"/>
<dbReference type="PDBsum" id="8GON"/>
<dbReference type="PDBsum" id="8GOU"/>
<dbReference type="PDBsum" id="8GPY"/>
<dbReference type="PDBsum" id="8GRY"/>
<dbReference type="PDBsum" id="8GS6"/>
<dbReference type="PDBsum" id="8GS9"/>
<dbReference type="PDBsum" id="8GSB"/>
<dbReference type="PDBsum" id="8GTO"/>
<dbReference type="PDBsum" id="8GTP"/>
<dbReference type="PDBsum" id="8GTQ"/>
<dbReference type="PDBsum" id="8GX9"/>
<dbReference type="PDBsum" id="8GZ5"/>
<dbReference type="PDBsum" id="8GZZ"/>
<dbReference type="PDBsum" id="8H00"/>
<dbReference type="PDBsum" id="8H01"/>
<dbReference type="PDBsum" id="8H06"/>
<dbReference type="PDBsum" id="8H07"/>
<dbReference type="PDBsum" id="8H3D"/>
<dbReference type="PDBsum" id="8H3E"/>
<dbReference type="PDBsum" id="8H5C"/>
<dbReference type="PDBsum" id="8H5T"/>
<dbReference type="PDBsum" id="8H5U"/>
<dbReference type="PDBsum" id="8H6F"/>
<dbReference type="PDBsum" id="8H7L"/>
<dbReference type="PDBsum" id="8H7Z"/>
<dbReference type="PDBsum" id="8H91"/>
<dbReference type="PDBsum" id="8HC4"/>
<dbReference type="PDBsum" id="8HC5"/>
<dbReference type="PDBsum" id="8HC8"/>
<dbReference type="PDBsum" id="8HEB"/>
<dbReference type="PDBsum" id="8HEC"/>
<dbReference type="PDBsum" id="8HED"/>
<dbReference type="PDBsum" id="8HES"/>
<dbReference type="PDBsum" id="8HFY"/>
<dbReference type="PDBsum" id="8HFZ"/>
<dbReference type="PDBsum" id="8HG0"/>
<dbReference type="PDBsum" id="8HGL"/>
<dbReference type="PDBsum" id="8HGM"/>
<dbReference type="PDBsum" id="8HHX"/>
<dbReference type="PDBsum" id="8HHY"/>
<dbReference type="PDBsum" id="8HLC"/>
<dbReference type="PDBsum" id="8HLD"/>
<dbReference type="PDBsum" id="8HN4"/>
<dbReference type="PDBsum" id="8HN6"/>
<dbReference type="PDBsum" id="8HN7"/>
<dbReference type="PDBsum" id="8HP9"/>
<dbReference type="PDBsum" id="8HPF"/>
<dbReference type="PDBsum" id="8HPQ"/>
<dbReference type="PDBsum" id="8HPU"/>
<dbReference type="PDBsum" id="8HPV"/>
<dbReference type="PDBsum" id="8HQ7"/>
<dbReference type="PDBsum" id="8HQT"/>
<dbReference type="PDBsum" id="8HR2"/>
<dbReference type="PDBsum" id="8HRD"/>
<dbReference type="PDBsum" id="8HRK"/>
<dbReference type="PDBsum" id="8HRL"/>
<dbReference type="PDBsum" id="8HSM"/>
<dbReference type="PDBsum" id="8HSO"/>
<dbReference type="PDBsum" id="8HSW"/>
<dbReference type="PDBsum" id="8HT1"/>
<dbReference type="PDBsum" id="8HT9"/>
<dbReference type="PDBsum" id="8HWS"/>
<dbReference type="PDBsum" id="8HWT"/>
<dbReference type="PDBsum" id="8HXJ"/>
<dbReference type="PDBsum" id="8I3S"/>
<dbReference type="PDBsum" id="8I3U"/>
<dbReference type="PDBsum" id="8I4E"/>
<dbReference type="PDBsum" id="8I4F"/>
<dbReference type="PDBsum" id="8I4G"/>
<dbReference type="PDBsum" id="8I5H"/>
<dbReference type="PDBsum" id="8I5I"/>
<dbReference type="PDBsum" id="8I9B"/>
<dbReference type="PDBsum" id="8I9C"/>
<dbReference type="PDBsum" id="8I9D"/>
<dbReference type="PDBsum" id="8I9E"/>
<dbReference type="PDBsum" id="8I9F"/>
<dbReference type="PDBsum" id="8I9G"/>
<dbReference type="PDBsum" id="8I9H"/>
<dbReference type="PDBsum" id="8IDN"/>
<dbReference type="PDBsum" id="8IF2"/>
<dbReference type="PDBsum" id="8IFY"/>
<dbReference type="PDBsum" id="8IFZ"/>
<dbReference type="PDBsum" id="8IOS"/>
<dbReference type="PDBsum" id="8IOT"/>
<dbReference type="PDBsum" id="8IOU"/>
<dbReference type="PDBsum" id="8IOV"/>
<dbReference type="PDBsum" id="8ITU"/>
<dbReference type="PDBsum" id="8IV4"/>
<dbReference type="PDBsum" id="8IV5"/>
<dbReference type="PDBsum" id="8IV8"/>
<dbReference type="PDBsum" id="8IVA"/>
<dbReference type="PDBsum" id="8IX3"/>
<dbReference type="PDBsum" id="8J1Q"/>
<dbReference type="PDBsum" id="8J1T"/>
<dbReference type="PDBsum" id="8J1V"/>
<dbReference type="PDBsum" id="8J26"/>
<dbReference type="PDBsum" id="8JAP"/>
<dbReference type="PDBsum" id="8JIN"/>
<dbReference type="PDBsum" id="8JIO"/>
<dbReference type="PDBsum" id="8JJE"/>
<dbReference type="PDBsum" id="8JMM"/>
<dbReference type="PDBsum" id="8JYK"/>
<dbReference type="PDBsum" id="8JYM"/>
<dbReference type="PDBsum" id="8JYN"/>
<dbReference type="PDBsum" id="8JYO"/>
<dbReference type="PDBsum" id="8JYP"/>
<dbReference type="PDBsum" id="8JYS"/>
<dbReference type="PDBsum" id="8K18"/>
<dbReference type="PDBsum" id="8K19"/>
<dbReference type="PDBsum" id="8K3K"/>
<dbReference type="PDBsum" id="8K46"/>
<dbReference type="PDBsum" id="8K47"/>
<dbReference type="PDBsum" id="8K5G"/>
<dbReference type="PDBsum" id="8K9B"/>
<dbReference type="PDBsum" id="8K9J"/>
<dbReference type="PDBsum" id="8K9M"/>
<dbReference type="PDBsum" id="8KA8"/>
<dbReference type="PDBsum" id="8KC2"/>
<dbReference type="PDBsum" id="8KDR"/>
<dbReference type="PDBsum" id="8KEH"/>
<dbReference type="PDBsum" id="8KEJ"/>
<dbReference type="PDBsum" id="8KEQ"/>
<dbReference type="PDBsum" id="8KER"/>
<dbReference type="PDBsum" id="8KHC"/>
<dbReference type="PDBsum" id="8KHD"/>
<dbReference type="PDBsum" id="8OWT"/>
<dbReference type="PDBsum" id="8OWV"/>
<dbReference type="PDBsum" id="8OWW"/>
<dbReference type="PDBsum" id="8OYT"/>
<dbReference type="PDBsum" id="8OYU"/>
<dbReference type="PDBsum" id="8P5M"/>
<dbReference type="PDBsum" id="8P99"/>
<dbReference type="PDBsum" id="8P9Y"/>
<dbReference type="PDBsum" id="8PQ2"/>
<dbReference type="PDBsum" id="8PSD"/>
<dbReference type="PDBsum" id="8Q5Y"/>
<dbReference type="PDBsum" id="8Q7S"/>
<dbReference type="PDBsum" id="8Q93"/>
<dbReference type="PDBsum" id="8Q94"/>
<dbReference type="PDBsum" id="8Q95"/>
<dbReference type="PDBsum" id="8QH0"/>
<dbReference type="PDBsum" id="8QPR"/>
<dbReference type="PDBsum" id="8QRF"/>
<dbReference type="PDBsum" id="8QRG"/>
<dbReference type="PDBsum" id="8QSQ"/>
<dbReference type="PDBsum" id="8QTD"/>
<dbReference type="PDBsum" id="8QZR"/>
<dbReference type="PDBsum" id="8R1C"/>
<dbReference type="PDBsum" id="8R1D"/>
<dbReference type="PDBsum" id="8R80"/>
<dbReference type="PDBsum" id="8R87"/>
<dbReference type="PDBsum" id="8R8K"/>
<dbReference type="PDBsum" id="8RBU"/>
<dbReference type="PDBsum" id="8RBV"/>
<dbReference type="PDBsum" id="8RBY"/>
<dbReference type="PDBsum" id="8RCV"/>
<dbReference type="PDBsum" id="8REF"/>
<dbReference type="PDBsum" id="8RH6"/>
<dbReference type="PDBsum" id="8RHQ"/>
<dbReference type="PDBsum" id="8RJ5"/>
<dbReference type="PDBsum" id="8RJ7"/>
<dbReference type="PDBsum" id="8RJH"/>
<dbReference type="PDBsum" id="8RJI"/>
<dbReference type="PDBsum" id="8RRN"/>
<dbReference type="PDBsum" id="8S6M"/>
<dbReference type="PDBsum" id="8S9G"/>
<dbReference type="PDBsum" id="8SDF"/>
<dbReference type="PDBsum" id="8SDG"/>
<dbReference type="PDBsum" id="8SDH"/>
<dbReference type="PDBsum" id="8SGU"/>
<dbReference type="PDBsum" id="8SIQ"/>
<dbReference type="PDBsum" id="8SIR"/>
<dbReference type="PDBsum" id="8SIS"/>
<dbReference type="PDBsum" id="8SIT"/>
<dbReference type="PDBsum" id="8SK5"/>
<dbReference type="PDBsum" id="8SMI"/>
<dbReference type="PDBsum" id="8SMT"/>
<dbReference type="PDBsum" id="8SUO"/>
<dbReference type="PDBsum" id="8SWH"/>
<dbReference type="PDBsum" id="8T20"/>
<dbReference type="PDBsum" id="8T22"/>
<dbReference type="PDBsum" id="8T23"/>
<dbReference type="PDBsum" id="8T25"/>
<dbReference type="PDBsum" id="8TAZ"/>
<dbReference type="PDBsum" id="8THF"/>
<dbReference type="PDBsum" id="8TM1"/>
<dbReference type="PDBsum" id="8TMA"/>
<dbReference type="PDBsum" id="8TMY"/>
<dbReference type="PDBsum" id="8TYL"/>
<dbReference type="PDBsum" id="8TYO"/>
<dbReference type="PDBsum" id="8U1G"/>
<dbReference type="PDBsum" id="8U28"/>
<dbReference type="PDBsum" id="8UG9"/>
<dbReference type="PDBsum" id="8UIR"/>
<dbReference type="PDBsum" id="8UK1"/>
<dbReference type="PDBsum" id="8UKD"/>
<dbReference type="PDBsum" id="8UKF"/>
<dbReference type="PDBsum" id="8USZ"/>
<dbReference type="PDBsum" id="8UUL"/>
<dbReference type="PDBsum" id="8UUM"/>
<dbReference type="PDBsum" id="8UUN"/>
<dbReference type="PDBsum" id="8UUO"/>
<dbReference type="PDBsum" id="8V0L"/>
<dbReference type="PDBsum" id="8V0M"/>
<dbReference type="PDBsum" id="8V0N"/>
<dbReference type="PDBsum" id="8V0O"/>
<dbReference type="PDBsum" id="8V0P"/>
<dbReference type="PDBsum" id="8V0Q"/>
<dbReference type="PDBsum" id="8V0R"/>
<dbReference type="PDBsum" id="8V0S"/>
<dbReference type="PDBsum" id="8V0T"/>
<dbReference type="PDBsum" id="8V0U"/>
<dbReference type="PDBsum" id="8V0V"/>
<dbReference type="PDBsum" id="8V0W"/>
<dbReference type="PDBsum" id="8V0X"/>
<dbReference type="PDBsum" id="8V4F"/>
<dbReference type="PDBsum" id="8V5V"/>
<dbReference type="PDBsum" id="8VAO"/>
<dbReference type="PDBsum" id="8VCR"/>
<dbReference type="PDBsum" id="8VIF"/>
<dbReference type="PDBsum" id="8VKE"/>
<dbReference type="PDBsum" id="8VKK"/>
<dbReference type="PDBsum" id="8VKL"/>
<dbReference type="PDBsum" id="8VKM"/>
<dbReference type="PDBsum" id="8VKN"/>
<dbReference type="PDBsum" id="8VKO"/>
<dbReference type="PDBsum" id="8VKP"/>
<dbReference type="PDBsum" id="8VQ9"/>
<dbReference type="PDBsum" id="8VQA"/>
<dbReference type="PDBsum" id="8VQB"/>
<dbReference type="PDBsum" id="8VQR"/>
<dbReference type="PDBsum" id="8VYA"/>
<dbReference type="PDBsum" id="8VYE"/>
<dbReference type="PDBsum" id="8VYF"/>
<dbReference type="PDBsum" id="8VYG"/>
<dbReference type="PDBsum" id="8W4F"/>
<dbReference type="PDBsum" id="8WDR"/>
<dbReference type="PDBsum" id="8WDS"/>
<dbReference type="PDBsum" id="8WDY"/>
<dbReference type="PDBsum" id="8WDZ"/>
<dbReference type="PDBsum" id="8WE0"/>
<dbReference type="PDBsum" id="8WE1"/>
<dbReference type="PDBsum" id="8WE4"/>
<dbReference type="PDBsum" id="8WFH"/>
<dbReference type="PDBsum" id="8WFM"/>
<dbReference type="PDBsum" id="8WGV"/>
<dbReference type="PDBsum" id="8WGW"/>
<dbReference type="PDBsum" id="8WHS"/>
<dbReference type="PDBsum" id="8WHU"/>
<dbReference type="PDBsum" id="8WHV"/>
<dbReference type="PDBsum" id="8WHW"/>
<dbReference type="PDBsum" id="8WHZ"/>
<dbReference type="PDBsum" id="8WLO"/>
<dbReference type="PDBsum" id="8WLR"/>
<dbReference type="PDBsum" id="8WMD"/>
<dbReference type="PDBsum" id="8WMF"/>
<dbReference type="PDBsum" id="8WOX"/>
<dbReference type="PDBsum" id="8WOY"/>
<dbReference type="PDBsum" id="8WP8"/>
<dbReference type="PDBsum" id="8WPW"/>
<dbReference type="PDBsum" id="8WPY"/>
<dbReference type="PDBsum" id="8WRH"/>
<dbReference type="PDBsum" id="8WRL"/>
<dbReference type="PDBsum" id="8WRM"/>
<dbReference type="PDBsum" id="8WRO"/>
<dbReference type="PDBsum" id="8WTD"/>
<dbReference type="PDBsum" id="8WTJ"/>
<dbReference type="PDBsum" id="8WXL"/>
<dbReference type="PDBsum" id="8WYH"/>
<dbReference type="PDBsum" id="8WYJ"/>
<dbReference type="PDBsum" id="8WZI"/>
<dbReference type="PDBsum" id="8X0X"/>
<dbReference type="PDBsum" id="8X0Y"/>
<dbReference type="PDBsum" id="8X4H"/>
<dbReference type="PDBsum" id="8X4Z"/>
<dbReference type="PDBsum" id="8X50"/>
<dbReference type="PDBsum" id="8X55"/>
<dbReference type="PDBsum" id="8X56"/>
<dbReference type="PDBsum" id="8X5Q"/>
<dbReference type="PDBsum" id="8X5R"/>
<dbReference type="PDBsum" id="8XAL"/>
<dbReference type="PDBsum" id="8XBF"/>
<dbReference type="PDBsum" id="8XE9"/>
<dbReference type="PDBsum" id="8XEA"/>
<dbReference type="PDBsum" id="8XEF"/>
<dbReference type="PDBsum" id="8XG2"/>
<dbReference type="PDBsum" id="8XI6"/>
<dbReference type="PDBsum" id="8XK2"/>
<dbReference type="PDBsum" id="8XKC"/>
<dbReference type="PDBsum" id="8XKE"/>
<dbReference type="PDBsum" id="8XKI"/>
<dbReference type="PDBsum" id="8XLM"/>
<dbReference type="PDBsum" id="8XLN"/>
<dbReference type="PDBsum" id="8XLV"/>
<dbReference type="PDBsum" id="8XM5"/>
<dbReference type="PDBsum" id="8XMG"/>
<dbReference type="PDBsum" id="8XMT"/>
<dbReference type="PDBsum" id="8XN2"/>
<dbReference type="PDBsum" id="8XN3"/>
<dbReference type="PDBsum" id="8XN5"/>
<dbReference type="PDBsum" id="8XNF"/>
<dbReference type="PDBsum" id="8XNK"/>
<dbReference type="PDBsum" id="8XRQ"/>
<dbReference type="PDBsum" id="8XSD"/>
<dbReference type="PDBsum" id="8XSE"/>
<dbReference type="PDBsum" id="8XSF"/>
<dbReference type="PDBsum" id="8XSI"/>
<dbReference type="PDBsum" id="8XSJ"/>
<dbReference type="PDBsum" id="8XSL"/>
<dbReference type="PDBsum" id="8XUR"/>
<dbReference type="PDBsum" id="8XUS"/>
<dbReference type="PDBsum" id="8XUT"/>
<dbReference type="PDBsum" id="8XUU"/>
<dbReference type="PDBsum" id="8XUX"/>
<dbReference type="PDBsum" id="8XUY"/>
<dbReference type="PDBsum" id="8XUZ"/>
<dbReference type="PDBsum" id="8XV0"/>
<dbReference type="PDBsum" id="8XV1"/>
<dbReference type="PDBsum" id="8XVM"/>
<dbReference type="PDBsum" id="8XXW"/>
<dbReference type="PDBsum" id="8XY9"/>
<dbReference type="PDBsum" id="8XYE"/>
<dbReference type="PDBsum" id="8XYG"/>
<dbReference type="PDBsum" id="8XYH"/>
<dbReference type="PDBsum" id="8XYM"/>
<dbReference type="PDBsum" id="8XYO"/>
<dbReference type="PDBsum" id="8XYZ"/>
<dbReference type="PDBsum" id="8XZ8"/>
<dbReference type="PDBsum" id="8XZ9"/>
<dbReference type="PDBsum" id="8XZA"/>
<dbReference type="PDBsum" id="8XZD"/>
<dbReference type="PDBsum" id="8Y0Y"/>
<dbReference type="PDBsum" id="8Y16"/>
<dbReference type="PDBsum" id="8Y18"/>
<dbReference type="PDBsum" id="8Y32"/>
<dbReference type="PDBsum" id="8Y4A"/>
<dbReference type="PDBsum" id="8Y4C"/>
<dbReference type="PDBsum" id="8Y5J"/>
<dbReference type="PDBsum" id="8Y6A"/>
<dbReference type="PDBsum" id="8YBS"/>
<dbReference type="PDBsum" id="8YBY"/>
<dbReference type="PDBsum" id="8YBZ"/>
<dbReference type="PDBsum" id="8YDP"/>
<dbReference type="PDBsum" id="8YDQ"/>
<dbReference type="PDBsum" id="8YDR"/>
<dbReference type="PDBsum" id="8YDS"/>
<dbReference type="PDBsum" id="8YDT"/>
<dbReference type="PDBsum" id="8YDU"/>
<dbReference type="PDBsum" id="8YDV"/>
<dbReference type="PDBsum" id="8YDW"/>
<dbReference type="PDBsum" id="8YDX"/>
<dbReference type="PDBsum" id="8YDY"/>
<dbReference type="PDBsum" id="8YDZ"/>
<dbReference type="PDBsum" id="8YE4"/>
<dbReference type="PDBsum" id="8YF2"/>
<dbReference type="PDBsum" id="8YFT"/>
<dbReference type="PDBsum" id="8YKG"/>
<dbReference type="PDBsum" id="8YKH"/>
<dbReference type="PDBsum" id="8YRO"/>
<dbReference type="PDBsum" id="8YRP"/>
<dbReference type="PDBsum" id="8YWW"/>
<dbReference type="PDBsum" id="8YWX"/>
<dbReference type="PDBsum" id="8YZ5"/>
<dbReference type="PDBsum" id="8YZB"/>
<dbReference type="PDBsum" id="8YZC"/>
<dbReference type="PDBsum" id="8YZD"/>
<dbReference type="PDBsum" id="8YZE"/>
<dbReference type="PDBsum" id="8YZR"/>
<dbReference type="PDBsum" id="8YZW"/>
<dbReference type="PDBsum" id="8YZZ"/>
<dbReference type="PDBsum" id="8Z05"/>
<dbReference type="PDBsum" id="8Z06"/>
<dbReference type="PDBsum" id="8Z07"/>
<dbReference type="PDBsum" id="8Z08"/>
<dbReference type="PDBsum" id="8Z3W"/>
<dbReference type="PDBsum" id="8Z4X"/>
<dbReference type="PDBsum" id="8Z64"/>
<dbReference type="PDBsum" id="8Z6A"/>
<dbReference type="PDBsum" id="8Z6U"/>
<dbReference type="PDBsum" id="8Z6W"/>
<dbReference type="PDBsum" id="8Z6X"/>
<dbReference type="PDBsum" id="8Z7B"/>
<dbReference type="PDBsum" id="8Z7G"/>
<dbReference type="PDBsum" id="8Z7L"/>
<dbReference type="PDBsum" id="8Z7P"/>
<dbReference type="PDBsum" id="8Z86"/>
<dbReference type="PDBsum" id="8ZBQ"/>
<dbReference type="PDBsum" id="8ZBZ"/>
<dbReference type="PDBsum" id="8ZC0"/>
<dbReference type="PDBsum" id="8ZC1"/>
<dbReference type="PDBsum" id="8ZC2"/>
<dbReference type="PDBsum" id="8ZC3"/>
<dbReference type="PDBsum" id="8ZC4"/>
<dbReference type="PDBsum" id="8ZC5"/>
<dbReference type="PDBsum" id="8ZC6"/>
<dbReference type="PDBsum" id="8ZER"/>
<dbReference type="PDBsum" id="8ZES"/>
<dbReference type="PDBsum" id="8ZHD"/>
<dbReference type="PDBsum" id="8ZHE"/>
<dbReference type="PDBsum" id="8ZHF"/>
<dbReference type="PDBsum" id="8ZHG"/>
<dbReference type="PDBsum" id="8ZHH"/>
<dbReference type="PDBsum" id="8ZHI"/>
<dbReference type="PDBsum" id="8ZHJ"/>
<dbReference type="PDBsum" id="8ZHK"/>
<dbReference type="PDBsum" id="8ZHL"/>
<dbReference type="PDBsum" id="8ZHM"/>
<dbReference type="PDBsum" id="8ZHN"/>
<dbReference type="PDBsum" id="8ZHO"/>
<dbReference type="PDBsum" id="8ZHP"/>
<dbReference type="PDBsum" id="8ZPP"/>
<dbReference type="PDBsum" id="8ZV9"/>
<dbReference type="PDBsum" id="8ZY2"/>
<dbReference type="PDBsum" id="8ZY3"/>
<dbReference type="PDBsum" id="9ARU"/>
<dbReference type="PDBsum" id="9ASD"/>
<dbReference type="PDBsum" id="9ATO"/>
<dbReference type="PDBsum" id="9ATP"/>
<dbReference type="PDBsum" id="9AU2"/>
<dbReference type="PDBsum" id="9AYW"/>
<dbReference type="PDBsum" id="9AYX"/>
<dbReference type="PDBsum" id="9AYY"/>
<dbReference type="PDBsum" id="9B0Y"/>
<dbReference type="PDBsum" id="9B2V"/>
<dbReference type="PDBsum" id="9B82"/>
<dbReference type="PDBsum" id="9BJ2"/>
<dbReference type="PDBsum" id="9BJ3"/>
<dbReference type="PDBsum" id="9BJ4"/>
<dbReference type="PDBsum" id="9C44"/>
<dbReference type="PDBsum" id="9C45"/>
<dbReference type="PDBsum" id="9CCI"/>
<dbReference type="PDBsum" id="9CCJ"/>
<dbReference type="PDBsum" id="9CO7"/>
<dbReference type="PDBsum" id="9CO8"/>
<dbReference type="PDBsum" id="9CO9"/>
<dbReference type="PDBsum" id="9CRC"/>
<dbReference type="PDBsum" id="9CRD"/>
<dbReference type="PDBsum" id="9CRE"/>
<dbReference type="PDBsum" id="9CRF"/>
<dbReference type="PDBsum" id="9CRG"/>
<dbReference type="PDBsum" id="9CRH"/>
<dbReference type="PDBsum" id="9CRI"/>
<dbReference type="PDBsum" id="9CSS"/>
<dbReference type="PDBsum" id="9CT2"/>
<dbReference type="PDBsum" id="9CVH"/>
<dbReference type="PDBsum" id="9CXE"/>
<dbReference type="PDBsum" id="9F9Y"/>
<dbReference type="PDBsum" id="9FGR"/>
<dbReference type="PDBsum" id="9FGS"/>
<dbReference type="PDBsum" id="9FGT"/>
<dbReference type="PDBsum" id="9FGU"/>
<dbReference type="PDBsum" id="9FJK"/>
<dbReference type="PDBsum" id="9GDX"/>
<dbReference type="PDBsum" id="9GDY"/>
<dbReference type="PDBsum" id="9IU1"/>
<dbReference type="PDBsum" id="9IUP"/>
<dbReference type="PDBsum" id="9IUQ"/>
<dbReference type="PDBsum" id="9IUU"/>
<dbReference type="PDBsum" id="9J66"/>
<dbReference type="PDBsum" id="9JS4"/>
<dbReference type="PDBsum" id="9KT3"/>
<dbReference type="PDBsum" id="9LAE"/>
<dbReference type="PDBsum" id="9N2L"/>
<dbReference type="EMDB" id="EMD-10863"/>
<dbReference type="EMDB" id="EMD-11068"/>
<dbReference type="EMDB" id="EMD-11144"/>
<dbReference type="EMDB" id="EMD-11145"/>
<dbReference type="EMDB" id="EMD-11146"/>
<dbReference type="EMDB" id="EMD-11173"/>
<dbReference type="EMDB" id="EMD-11174"/>
<dbReference type="EMDB" id="EMD-11184"/>
<dbReference type="EMDB" id="EMD-11203"/>
<dbReference type="EMDB" id="EMD-11205"/>
<dbReference type="EMDB" id="EMD-11206"/>
<dbReference type="EMDB" id="EMD-11207"/>
<dbReference type="EMDB" id="EMD-11328"/>
<dbReference type="EMDB" id="EMD-11329"/>
<dbReference type="EMDB" id="EMD-11330"/>
<dbReference type="EMDB" id="EMD-11331"/>
<dbReference type="EMDB" id="EMD-11332"/>
<dbReference type="EMDB" id="EMD-11333"/>
<dbReference type="EMDB" id="EMD-11334"/>
<dbReference type="EMDB" id="EMD-11336"/>
<dbReference type="EMDB" id="EMD-11337"/>
<dbReference type="EMDB" id="EMD-11341"/>
<dbReference type="EMDB" id="EMD-11497"/>
<dbReference type="EMDB" id="EMD-11526"/>
<dbReference type="EMDB" id="EMD-11616"/>
<dbReference type="EMDB" id="EMD-11617"/>
<dbReference type="EMDB" id="EMD-11647"/>
<dbReference type="EMDB" id="EMD-11648"/>
<dbReference type="EMDB" id="EMD-11681"/>
<dbReference type="EMDB" id="EMD-11682"/>
<dbReference type="EMDB" id="EMD-11683"/>
<dbReference type="EMDB" id="EMD-11684"/>
<dbReference type="EMDB" id="EMD-11685"/>
<dbReference type="EMDB" id="EMD-11686"/>
<dbReference type="EMDB" id="EMD-11687"/>
<dbReference type="EMDB" id="EMD-11688"/>
<dbReference type="EMDB" id="EMD-11812"/>
<dbReference type="EMDB" id="EMD-11978"/>
<dbReference type="EMDB" id="EMD-11980"/>
<dbReference type="EMDB" id="EMD-11981"/>
<dbReference type="EMDB" id="EMD-12187"/>
<dbReference type="EMDB" id="EMD-12229"/>
<dbReference type="EMDB" id="EMD-12230"/>
<dbReference type="EMDB" id="EMD-12231"/>
<dbReference type="EMDB" id="EMD-12274"/>
<dbReference type="EMDB" id="EMD-12275"/>
<dbReference type="EMDB" id="EMD-12276"/>
<dbReference type="EMDB" id="EMD-12277"/>
<dbReference type="EMDB" id="EMD-12278"/>
<dbReference type="EMDB" id="EMD-12279"/>
<dbReference type="EMDB" id="EMD-12280"/>
<dbReference type="EMDB" id="EMD-12281"/>
<dbReference type="EMDB" id="EMD-12282"/>
<dbReference type="EMDB" id="EMD-12283"/>
<dbReference type="EMDB" id="EMD-12284"/>
<dbReference type="EMDB" id="EMD-12465"/>
<dbReference type="EMDB" id="EMD-12585"/>
<dbReference type="EMDB" id="EMD-12586"/>
<dbReference type="EMDB" id="EMD-12587"/>
<dbReference type="EMDB" id="EMD-12777"/>
<dbReference type="EMDB" id="EMD-12818"/>
<dbReference type="EMDB" id="EMD-12842"/>
<dbReference type="EMDB" id="EMD-13776"/>
<dbReference type="EMDB" id="EMD-13857"/>
<dbReference type="EMDB" id="EMD-13868"/>
<dbReference type="EMDB" id="EMD-13869"/>
<dbReference type="EMDB" id="EMD-13870"/>
<dbReference type="EMDB" id="EMD-13871"/>
<dbReference type="EMDB" id="EMD-13872"/>
<dbReference type="EMDB" id="EMD-13873"/>
<dbReference type="EMDB" id="EMD-13875"/>
<dbReference type="EMDB" id="EMD-14087"/>
<dbReference type="EMDB" id="EMD-14154"/>
<dbReference type="EMDB" id="EMD-14155"/>
<dbReference type="EMDB" id="EMD-14225"/>
<dbReference type="EMDB" id="EMD-14226"/>
<dbReference type="EMDB" id="EMD-14227"/>
<dbReference type="EMDB" id="EMD-14228"/>
<dbReference type="EMDB" id="EMD-14229"/>
<dbReference type="EMDB" id="EMD-14230"/>
<dbReference type="EMDB" id="EMD-14232"/>
<dbReference type="EMDB" id="EMD-14233"/>
<dbReference type="EMDB" id="EMD-14234"/>
<dbReference type="EMDB" id="EMD-14235"/>
<dbReference type="EMDB" id="EMD-14236"/>
<dbReference type="EMDB" id="EMD-14237"/>
<dbReference type="EMDB" id="EMD-14250"/>
<dbReference type="EMDB" id="EMD-14313"/>
<dbReference type="EMDB" id="EMD-14314"/>
<dbReference type="EMDB" id="EMD-14315"/>
<dbReference type="EMDB" id="EMD-14481"/>
<dbReference type="EMDB" id="EMD-14591"/>
<dbReference type="EMDB" id="EMD-14666"/>
<dbReference type="EMDB" id="EMD-14750"/>
<dbReference type="EMDB" id="EMD-14930"/>
<dbReference type="EMDB" id="EMD-14947"/>
<dbReference type="EMDB" id="EMD-15269"/>
<dbReference type="EMDB" id="EMD-15270"/>
<dbReference type="EMDB" id="EMD-15271"/>
<dbReference type="EMDB" id="EMD-15273"/>
<dbReference type="EMDB" id="EMD-15971"/>
<dbReference type="EMDB" id="EMD-15994"/>
<dbReference type="EMDB" id="EMD-15997"/>
<dbReference type="EMDB" id="EMD-16010"/>
<dbReference type="EMDB" id="EMD-16024"/>
<dbReference type="EMDB" id="EMD-16026"/>
<dbReference type="EMDB" id="EMD-16030"/>
<dbReference type="EMDB" id="EMD-16375"/>
<dbReference type="EMDB" id="EMD-16383"/>
<dbReference type="EMDB" id="EMD-16388"/>
<dbReference type="EMDB" id="EMD-16397"/>
<dbReference type="EMDB" id="EMD-16473"/>
<dbReference type="EMDB" id="EMD-16490"/>
<dbReference type="EMDB" id="EMD-16676"/>
<dbReference type="EMDB" id="EMD-16680"/>
<dbReference type="EMDB" id="EMD-17169"/>
<dbReference type="EMDB" id="EMD-17170"/>
<dbReference type="EMDB" id="EMD-17451"/>
<dbReference type="EMDB" id="EMD-17576"/>
<dbReference type="EMDB" id="EMD-17578"/>
<dbReference type="EMDB" id="EMD-17819"/>
<dbReference type="EMDB" id="EMD-17850"/>
<dbReference type="EMDB" id="EMD-18180"/>
<dbReference type="EMDB" id="EMD-18639"/>
<dbReference type="EMDB" id="EMD-19064"/>
<dbReference type="EMDB" id="EMD-19068"/>
<dbReference type="EMDB" id="EMD-21375"/>
<dbReference type="EMDB" id="EMD-21452"/>
<dbReference type="EMDB" id="EMD-21457"/>
<dbReference type="EMDB" id="EMD-21864"/>
<dbReference type="EMDB" id="EMD-21865"/>
<dbReference type="EMDB" id="EMD-21997"/>
<dbReference type="EMDB" id="EMD-21999"/>
<dbReference type="EMDB" id="EMD-22000"/>
<dbReference type="EMDB" id="EMD-22001"/>
<dbReference type="EMDB" id="EMD-22078"/>
<dbReference type="EMDB" id="EMD-22083"/>
<dbReference type="EMDB" id="EMD-22127"/>
<dbReference type="EMDB" id="EMD-22128"/>
<dbReference type="EMDB" id="EMD-22137"/>
<dbReference type="EMDB" id="EMD-22156"/>
<dbReference type="EMDB" id="EMD-22161"/>
<dbReference type="EMDB" id="EMD-22162"/>
<dbReference type="EMDB" id="EMD-22221"/>
<dbReference type="EMDB" id="EMD-22251"/>
<dbReference type="EMDB" id="EMD-22253"/>
<dbReference type="EMDB" id="EMD-22254"/>
<dbReference type="EMDB" id="EMD-22255"/>
<dbReference type="EMDB" id="EMD-22256"/>
<dbReference type="EMDB" id="EMD-22292"/>
<dbReference type="EMDB" id="EMD-22293"/>
<dbReference type="EMDB" id="EMD-22301"/>
<dbReference type="EMDB" id="EMD-22352"/>
<dbReference type="EMDB" id="EMD-22353"/>
<dbReference type="EMDB" id="EMD-22354"/>
<dbReference type="EMDB" id="EMD-22355"/>
<dbReference type="EMDB" id="EMD-22356"/>
<dbReference type="EMDB" id="EMD-22491"/>
<dbReference type="EMDB" id="EMD-22492"/>
<dbReference type="EMDB" id="EMD-22494"/>
<dbReference type="EMDB" id="EMD-22497"/>
<dbReference type="EMDB" id="EMD-22506"/>
<dbReference type="EMDB" id="EMD-22512"/>
<dbReference type="EMDB" id="EMD-22514"/>
<dbReference type="EMDB" id="EMD-22515"/>
<dbReference type="EMDB" id="EMD-22532"/>
<dbReference type="EMDB" id="EMD-22533"/>
<dbReference type="EMDB" id="EMD-22534"/>
<dbReference type="EMDB" id="EMD-22574"/>
<dbReference type="EMDB" id="EMD-22659"/>
<dbReference type="EMDB" id="EMD-22660"/>
<dbReference type="EMDB" id="EMD-22668"/>
<dbReference type="EMDB" id="EMD-22729"/>
<dbReference type="EMDB" id="EMD-22730"/>
<dbReference type="EMDB" id="EMD-22731"/>
<dbReference type="EMDB" id="EMD-22732"/>
<dbReference type="EMDB" id="EMD-22733"/>
<dbReference type="EMDB" id="EMD-22734"/>
<dbReference type="EMDB" id="EMD-22735"/>
<dbReference type="EMDB" id="EMD-22736"/>
<dbReference type="EMDB" id="EMD-22737"/>
<dbReference type="EMDB" id="EMD-22738"/>
<dbReference type="EMDB" id="EMD-22739"/>
<dbReference type="EMDB" id="EMD-22740"/>
<dbReference type="EMDB" id="EMD-22741"/>
<dbReference type="EMDB" id="EMD-22748"/>
<dbReference type="EMDB" id="EMD-22749"/>
<dbReference type="EMDB" id="EMD-22750"/>
<dbReference type="EMDB" id="EMD-22751"/>
<dbReference type="EMDB" id="EMD-22809"/>
<dbReference type="EMDB" id="EMD-22821"/>
<dbReference type="EMDB" id="EMD-22822"/>
<dbReference type="EMDB" id="EMD-22823"/>
<dbReference type="EMDB" id="EMD-22824"/>
<dbReference type="EMDB" id="EMD-22825"/>
<dbReference type="EMDB" id="EMD-22826"/>
<dbReference type="EMDB" id="EMD-22831"/>
<dbReference type="EMDB" id="EMD-22832"/>
<dbReference type="EMDB" id="EMD-22833"/>
<dbReference type="EMDB" id="EMD-22834"/>
<dbReference type="EMDB" id="EMD-22835"/>
<dbReference type="EMDB" id="EMD-22836"/>
<dbReference type="EMDB" id="EMD-22837"/>
<dbReference type="EMDB" id="EMD-22838"/>
<dbReference type="EMDB" id="EMD-22891"/>
<dbReference type="EMDB" id="EMD-22892"/>
<dbReference type="EMDB" id="EMD-22893"/>
<dbReference type="EMDB" id="EMD-22894"/>
<dbReference type="EMDB" id="EMD-22907"/>
<dbReference type="EMDB" id="EMD-22910"/>
<dbReference type="EMDB" id="EMD-22913"/>
<dbReference type="EMDB" id="EMD-22914"/>
<dbReference type="EMDB" id="EMD-22915"/>
<dbReference type="EMDB" id="EMD-22916"/>
<dbReference type="EMDB" id="EMD-22922"/>
<dbReference type="EMDB" id="EMD-22925"/>
<dbReference type="EMDB" id="EMD-22926"/>
<dbReference type="EMDB" id="EMD-22927"/>
<dbReference type="EMDB" id="EMD-22932"/>
<dbReference type="EMDB" id="EMD-22934"/>
<dbReference type="EMDB" id="EMD-22941"/>
<dbReference type="EMDB" id="EMD-22943"/>
<dbReference type="EMDB" id="EMD-22949"/>
<dbReference type="EMDB" id="EMD-22950"/>
<dbReference type="EMDB" id="EMD-22993"/>
<dbReference type="EMDB" id="EMD-22995"/>
<dbReference type="EMDB" id="EMD-22997"/>
<dbReference type="EMDB" id="EMD-23010"/>
<dbReference type="EMDB" id="EMD-23011"/>
<dbReference type="EMDB" id="EMD-23012"/>
<dbReference type="EMDB" id="EMD-23016"/>
<dbReference type="EMDB" id="EMD-23018"/>
<dbReference type="EMDB" id="EMD-23064"/>
<dbReference type="EMDB" id="EMD-23065"/>
<dbReference type="EMDB" id="EMD-23094"/>
<dbReference type="EMDB" id="EMD-23095"/>
<dbReference type="EMDB" id="EMD-23097"/>
<dbReference type="EMDB" id="EMD-23125"/>
<dbReference type="EMDB" id="EMD-23126"/>
<dbReference type="EMDB" id="EMD-23127"/>
<dbReference type="EMDB" id="EMD-23156"/>
<dbReference type="EMDB" id="EMD-23165"/>
<dbReference type="EMDB" id="EMD-23166"/>
<dbReference type="EMDB" id="EMD-23167"/>
<dbReference type="EMDB" id="EMD-23215"/>
<dbReference type="EMDB" id="EMD-23246"/>
<dbReference type="EMDB" id="EMD-23248"/>
<dbReference type="EMDB" id="EMD-23277"/>
<dbReference type="EMDB" id="EMD-23279"/>
<dbReference type="EMDB" id="EMD-23400"/>
<dbReference type="EMDB" id="EMD-23489"/>
<dbReference type="EMDB" id="EMD-23490"/>
<dbReference type="EMDB" id="EMD-23498"/>
<dbReference type="EMDB" id="EMD-23499"/>
<dbReference type="EMDB" id="EMD-23506"/>
<dbReference type="EMDB" id="EMD-23507"/>
<dbReference type="EMDB" id="EMD-23546"/>
<dbReference type="EMDB" id="EMD-23547"/>
<dbReference type="EMDB" id="EMD-23548"/>
<dbReference type="EMDB" id="EMD-23549"/>
<dbReference type="EMDB" id="EMD-23550"/>
<dbReference type="EMDB" id="EMD-23551"/>
<dbReference type="EMDB" id="EMD-23552"/>
<dbReference type="EMDB" id="EMD-23553"/>
<dbReference type="EMDB" id="EMD-23554"/>
<dbReference type="EMDB" id="EMD-23555"/>
<dbReference type="EMDB" id="EMD-23556"/>
<dbReference type="EMDB" id="EMD-23557"/>
<dbReference type="EMDB" id="EMD-23558"/>
<dbReference type="EMDB" id="EMD-23559"/>
<dbReference type="EMDB" id="EMD-23566"/>
<dbReference type="EMDB" id="EMD-23577"/>
<dbReference type="EMDB" id="EMD-23578"/>
<dbReference type="EMDB" id="EMD-23579"/>
<dbReference type="EMDB" id="EMD-23580"/>
<dbReference type="EMDB" id="EMD-23581"/>
<dbReference type="EMDB" id="EMD-23582"/>
<dbReference type="EMDB" id="EMD-23593"/>
<dbReference type="EMDB" id="EMD-23594"/>
<dbReference type="EMDB" id="EMD-23595"/>
<dbReference type="EMDB" id="EMD-23596"/>
<dbReference type="EMDB" id="EMD-23597"/>
<dbReference type="EMDB" id="EMD-23598"/>
<dbReference type="EMDB" id="EMD-23599"/>
<dbReference type="EMDB" id="EMD-23612"/>
<dbReference type="EMDB" id="EMD-23662"/>
<dbReference type="EMDB" id="EMD-23693"/>
<dbReference type="EMDB" id="EMD-23694"/>
<dbReference type="EMDB" id="EMD-23695"/>
<dbReference type="EMDB" id="EMD-23696"/>
<dbReference type="EMDB" id="EMD-23697"/>
<dbReference type="EMDB" id="EMD-23707"/>
<dbReference type="EMDB" id="EMD-23709"/>
<dbReference type="EMDB" id="EMD-23717"/>
<dbReference type="EMDB" id="EMD-23718"/>
<dbReference type="EMDB" id="EMD-23782"/>
<dbReference type="EMDB" id="EMD-23788"/>
<dbReference type="EMDB" id="EMD-23790"/>
<dbReference type="EMDB" id="EMD-23872"/>
<dbReference type="EMDB" id="EMD-23873"/>
<dbReference type="EMDB" id="EMD-23874"/>
<dbReference type="EMDB" id="EMD-23875"/>
<dbReference type="EMDB" id="EMD-23876"/>
<dbReference type="EMDB" id="EMD-23877"/>
<dbReference type="EMDB" id="EMD-23878"/>
<dbReference type="EMDB" id="EMD-23879"/>
<dbReference type="EMDB" id="EMD-23898"/>
<dbReference type="EMDB" id="EMD-23899"/>
<dbReference type="EMDB" id="EMD-23914"/>
<dbReference type="EMDB" id="EMD-23915"/>
<dbReference type="EMDB" id="EMD-23982"/>
<dbReference type="EMDB" id="EMD-23983"/>
<dbReference type="EMDB" id="EMD-23984"/>
<dbReference type="EMDB" id="EMD-24060"/>
<dbReference type="EMDB" id="EMD-24061"/>
<dbReference type="EMDB" id="EMD-24062"/>
<dbReference type="EMDB" id="EMD-24063"/>
<dbReference type="EMDB" id="EMD-24064"/>
<dbReference type="EMDB" id="EMD-24075"/>
<dbReference type="EMDB" id="EMD-24077"/>
<dbReference type="EMDB" id="EMD-24078"/>
<dbReference type="EMDB" id="EMD-24105"/>
<dbReference type="EMDB" id="EMD-24106"/>
<dbReference type="EMDB" id="EMD-24121"/>
<dbReference type="EMDB" id="EMD-24122"/>
<dbReference type="EMDB" id="EMD-24123"/>
<dbReference type="EMDB" id="EMD-24124"/>
<dbReference type="EMDB" id="EMD-24125"/>
<dbReference type="EMDB" id="EMD-24126"/>
<dbReference type="EMDB" id="EMD-24127"/>
<dbReference type="EMDB" id="EMD-24190"/>
<dbReference type="EMDB" id="EMD-24192"/>
<dbReference type="EMDB" id="EMD-24193"/>
<dbReference type="EMDB" id="EMD-24236"/>
<dbReference type="EMDB" id="EMD-24237"/>
<dbReference type="EMDB" id="EMD-24253"/>
<dbReference type="EMDB" id="EMD-24255"/>
<dbReference type="EMDB" id="EMD-24256"/>
<dbReference type="EMDB" id="EMD-24257"/>
<dbReference type="EMDB" id="EMD-24262"/>
<dbReference type="EMDB" id="EMD-24299"/>
<dbReference type="EMDB" id="EMD-24318"/>
<dbReference type="EMDB" id="EMD-24319"/>
<dbReference type="EMDB" id="EMD-24320"/>
<dbReference type="EMDB" id="EMD-24347"/>
<dbReference type="EMDB" id="EMD-24365"/>
<dbReference type="EMDB" id="EMD-24402"/>
<dbReference type="EMDB" id="EMD-24403"/>
<dbReference type="EMDB" id="EMD-24504"/>
<dbReference type="EMDB" id="EMD-24628"/>
<dbReference type="EMDB" id="EMD-24649"/>
<dbReference type="EMDB" id="EMD-24693"/>
<dbReference type="EMDB" id="EMD-24694"/>
<dbReference type="EMDB" id="EMD-24695"/>
<dbReference type="EMDB" id="EMD-24696"/>
<dbReference type="EMDB" id="EMD-24697"/>
<dbReference type="EMDB" id="EMD-24699"/>
<dbReference type="EMDB" id="EMD-24708"/>
<dbReference type="EMDB" id="EMD-24729"/>
<dbReference type="EMDB" id="EMD-24774"/>
<dbReference type="EMDB" id="EMD-24775"/>
<dbReference type="EMDB" id="EMD-24776"/>
<dbReference type="EMDB" id="EMD-24777"/>
<dbReference type="EMDB" id="EMD-24778"/>
<dbReference type="EMDB" id="EMD-24779"/>
<dbReference type="EMDB" id="EMD-24786"/>
<dbReference type="EMDB" id="EMD-24787"/>
<dbReference type="EMDB" id="EMD-24788"/>
<dbReference type="EMDB" id="EMD-24876"/>
<dbReference type="EMDB" id="EMD-24877"/>
<dbReference type="EMDB" id="EMD-24878"/>
<dbReference type="EMDB" id="EMD-24879"/>
<dbReference type="EMDB" id="EMD-24981"/>
<dbReference type="EMDB" id="EMD-24982"/>
<dbReference type="EMDB" id="EMD-24983"/>
<dbReference type="EMDB" id="EMD-24984"/>
<dbReference type="EMDB" id="EMD-24985"/>
<dbReference type="EMDB" id="EMD-24986"/>
<dbReference type="EMDB" id="EMD-24987"/>
<dbReference type="EMDB" id="EMD-24988"/>
<dbReference type="EMDB" id="EMD-25008"/>
<dbReference type="EMDB" id="EMD-25146"/>
<dbReference type="EMDB" id="EMD-25149"/>
<dbReference type="EMDB" id="EMD-25166"/>
<dbReference type="EMDB" id="EMD-25167"/>
<dbReference type="EMDB" id="EMD-25200"/>
<dbReference type="EMDB" id="EMD-25209"/>
<dbReference type="EMDB" id="EMD-25210"/>
<dbReference type="EMDB" id="EMD-25263"/>
<dbReference type="EMDB" id="EMD-25264"/>
<dbReference type="EMDB" id="EMD-25265"/>
<dbReference type="EMDB" id="EMD-25266"/>
<dbReference type="EMDB" id="EMD-25267"/>
<dbReference type="EMDB" id="EMD-25268"/>
<dbReference type="EMDB" id="EMD-25269"/>
<dbReference type="EMDB" id="EMD-25476"/>
<dbReference type="EMDB" id="EMD-25477"/>
<dbReference type="EMDB" id="EMD-25478"/>
<dbReference type="EMDB" id="EMD-25487"/>
<dbReference type="EMDB" id="EMD-25488"/>
<dbReference type="EMDB" id="EMD-25503"/>
<dbReference type="EMDB" id="EMD-25504"/>
<dbReference type="EMDB" id="EMD-25505"/>
<dbReference type="EMDB" id="EMD-25506"/>
<dbReference type="EMDB" id="EMD-25507"/>
<dbReference type="EMDB" id="EMD-25508"/>
<dbReference type="EMDB" id="EMD-25509"/>
<dbReference type="EMDB" id="EMD-25510"/>
<dbReference type="EMDB" id="EMD-25511"/>
<dbReference type="EMDB" id="EMD-25512"/>
<dbReference type="EMDB" id="EMD-25513"/>
<dbReference type="EMDB" id="EMD-25514"/>
<dbReference type="EMDB" id="EMD-25515"/>
<dbReference type="EMDB" id="EMD-25516"/>
<dbReference type="EMDB" id="EMD-25517"/>
<dbReference type="EMDB" id="EMD-25518"/>
<dbReference type="EMDB" id="EMD-25519"/>
<dbReference type="EMDB" id="EMD-25520"/>
<dbReference type="EMDB" id="EMD-25574"/>
<dbReference type="EMDB" id="EMD-25663"/>
<dbReference type="EMDB" id="EMD-25699"/>
<dbReference type="EMDB" id="EMD-25711"/>
<dbReference type="EMDB" id="EMD-25759"/>
<dbReference type="EMDB" id="EMD-25760"/>
<dbReference type="EMDB" id="EMD-25761"/>
<dbReference type="EMDB" id="EMD-25783"/>
<dbReference type="EMDB" id="EMD-25784"/>
<dbReference type="EMDB" id="EMD-25794"/>
<dbReference type="EMDB" id="EMD-25797"/>
<dbReference type="EMDB" id="EMD-25806"/>
<dbReference type="EMDB" id="EMD-25807"/>
<dbReference type="EMDB" id="EMD-25808"/>
<dbReference type="EMDB" id="EMD-25846"/>
<dbReference type="EMDB" id="EMD-25853"/>
<dbReference type="EMDB" id="EMD-25854"/>
<dbReference type="EMDB" id="EMD-25855"/>
<dbReference type="EMDB" id="EMD-25856"/>
<dbReference type="EMDB" id="EMD-25857"/>
<dbReference type="EMDB" id="EMD-25858"/>
<dbReference type="EMDB" id="EMD-25859"/>
<dbReference type="EMDB" id="EMD-25860"/>
<dbReference type="EMDB" id="EMD-25861"/>
<dbReference type="EMDB" id="EMD-25862"/>
<dbReference type="EMDB" id="EMD-25865"/>
<dbReference type="EMDB" id="EMD-25880"/>
<dbReference type="EMDB" id="EMD-25887"/>
<dbReference type="EMDB" id="EMD-25888"/>
<dbReference type="EMDB" id="EMD-25889"/>
<dbReference type="EMDB" id="EMD-25893"/>
<dbReference type="EMDB" id="EMD-25896"/>
<dbReference type="EMDB" id="EMD-25904"/>
<dbReference type="EMDB" id="EMD-25912"/>
<dbReference type="EMDB" id="EMD-25983"/>
<dbReference type="EMDB" id="EMD-25984"/>
<dbReference type="EMDB" id="EMD-25985"/>
<dbReference type="EMDB" id="EMD-25986"/>
<dbReference type="EMDB" id="EMD-25987"/>
<dbReference type="EMDB" id="EMD-25988"/>
<dbReference type="EMDB" id="EMD-25990"/>
<dbReference type="EMDB" id="EMD-25991"/>
<dbReference type="EMDB" id="EMD-25992"/>
<dbReference type="EMDB" id="EMD-26021"/>
<dbReference type="EMDB" id="EMD-26029"/>
<dbReference type="EMDB" id="EMD-26038"/>
<dbReference type="EMDB" id="EMD-26039"/>
<dbReference type="EMDB" id="EMD-26040"/>
<dbReference type="EMDB" id="EMD-26041"/>
<dbReference type="EMDB" id="EMD-26042"/>
<dbReference type="EMDB" id="EMD-26043"/>
<dbReference type="EMDB" id="EMD-26045"/>
<dbReference type="EMDB" id="EMD-26046"/>
<dbReference type="EMDB" id="EMD-26047"/>
<dbReference type="EMDB" id="EMD-26048"/>
<dbReference type="EMDB" id="EMD-26049"/>
<dbReference type="EMDB" id="EMD-26050"/>
<dbReference type="EMDB" id="EMD-26051"/>
<dbReference type="EMDB" id="EMD-26052"/>
<dbReference type="EMDB" id="EMD-26053"/>
<dbReference type="EMDB" id="EMD-26055"/>
<dbReference type="EMDB" id="EMD-26056"/>
<dbReference type="EMDB" id="EMD-26058"/>
<dbReference type="EMDB" id="EMD-26059"/>
<dbReference type="EMDB" id="EMD-26062"/>
<dbReference type="EMDB" id="EMD-26200"/>
<dbReference type="EMDB" id="EMD-26201"/>
<dbReference type="EMDB" id="EMD-26262"/>
<dbReference type="EMDB" id="EMD-26263"/>
<dbReference type="EMDB" id="EMD-26267"/>
<dbReference type="EMDB" id="EMD-26402"/>
<dbReference type="EMDB" id="EMD-26404"/>
<dbReference type="EMDB" id="EMD-26429"/>
<dbReference type="EMDB" id="EMD-26430"/>
<dbReference type="EMDB" id="EMD-26431"/>
<dbReference type="EMDB" id="EMD-26433"/>
<dbReference type="EMDB" id="EMD-26435"/>
<dbReference type="EMDB" id="EMD-26436"/>
<dbReference type="EMDB" id="EMD-26511"/>
<dbReference type="EMDB" id="EMD-26512"/>
<dbReference type="EMDB" id="EMD-26583"/>
<dbReference type="EMDB" id="EMD-26584"/>
<dbReference type="EMDB" id="EMD-26656"/>
<dbReference type="EMDB" id="EMD-26669"/>
<dbReference type="EMDB" id="EMD-26676"/>
<dbReference type="EMDB" id="EMD-26677"/>
<dbReference type="EMDB" id="EMD-26678"/>
<dbReference type="EMDB" id="EMD-26878"/>
<dbReference type="EMDB" id="EMD-26879"/>
<dbReference type="EMDB" id="EMD-26880"/>
<dbReference type="EMDB" id="EMD-26881"/>
<dbReference type="EMDB" id="EMD-26882"/>
<dbReference type="EMDB" id="EMD-26883"/>
<dbReference type="EMDB" id="EMD-26884"/>
<dbReference type="EMDB" id="EMD-26885"/>
<dbReference type="EMDB" id="EMD-26961"/>
<dbReference type="EMDB" id="EMD-26964"/>
<dbReference type="EMDB" id="EMD-27061"/>
<dbReference type="EMDB" id="EMD-27067"/>
<dbReference type="EMDB" id="EMD-27068"/>
<dbReference type="EMDB" id="EMD-27069"/>
<dbReference type="EMDB" id="EMD-27071"/>
<dbReference type="EMDB" id="EMD-27072"/>
<dbReference type="EMDB" id="EMD-27073"/>
<dbReference type="EMDB" id="EMD-27074"/>
<dbReference type="EMDB" id="EMD-27075"/>
<dbReference type="EMDB" id="EMD-27080"/>
<dbReference type="EMDB" id="EMD-27098"/>
<dbReference type="EMDB" id="EMD-27113"/>
<dbReference type="EMDB" id="EMD-27177"/>
<dbReference type="EMDB" id="EMD-27205"/>
<dbReference type="EMDB" id="EMD-27206"/>
<dbReference type="EMDB" id="EMD-27207"/>
<dbReference type="EMDB" id="EMD-27254"/>
<dbReference type="EMDB" id="EMD-27255"/>
<dbReference type="EMDB" id="EMD-27270"/>
<dbReference type="EMDB" id="EMD-27439"/>
<dbReference type="EMDB" id="EMD-27502"/>
<dbReference type="EMDB" id="EMD-27503"/>
<dbReference type="EMDB" id="EMD-27504"/>
<dbReference type="EMDB" id="EMD-27505"/>
<dbReference type="EMDB" id="EMD-27506"/>
<dbReference type="EMDB" id="EMD-27507"/>
<dbReference type="EMDB" id="EMD-27508"/>
<dbReference type="EMDB" id="EMD-27509"/>
<dbReference type="EMDB" id="EMD-27510"/>
<dbReference type="EMDB" id="EMD-27512"/>
<dbReference type="EMDB" id="EMD-27514"/>
<dbReference type="EMDB" id="EMD-27515"/>
<dbReference type="EMDB" id="EMD-27516"/>
<dbReference type="EMDB" id="EMD-27517"/>
<dbReference type="EMDB" id="EMD-27518"/>
<dbReference type="EMDB" id="EMD-27519"/>
<dbReference type="EMDB" id="EMD-27520"/>
<dbReference type="EMDB" id="EMD-27521"/>
<dbReference type="EMDB" id="EMD-27522"/>
<dbReference type="EMDB" id="EMD-27523"/>
<dbReference type="EMDB" id="EMD-27524"/>
<dbReference type="EMDB" id="EMD-27525"/>
<dbReference type="EMDB" id="EMD-27526"/>
<dbReference type="EMDB" id="EMD-27527"/>
<dbReference type="EMDB" id="EMD-27528"/>
<dbReference type="EMDB" id="EMD-27529"/>
<dbReference type="EMDB" id="EMD-27530"/>
<dbReference type="EMDB" id="EMD-27531"/>
<dbReference type="EMDB" id="EMD-27532"/>
<dbReference type="EMDB" id="EMD-27644"/>
<dbReference type="EMDB" id="EMD-27690"/>
<dbReference type="EMDB" id="EMD-27692"/>
<dbReference type="EMDB" id="EMD-27703"/>
<dbReference type="EMDB" id="EMD-27730"/>
<dbReference type="EMDB" id="EMD-27731"/>
<dbReference type="EMDB" id="EMD-27749"/>
<dbReference type="EMDB" id="EMD-27750"/>
<dbReference type="EMDB" id="EMD-27775"/>
<dbReference type="EMDB" id="EMD-27798"/>
<dbReference type="EMDB" id="EMD-27799"/>
<dbReference type="EMDB" id="EMD-28189"/>
<dbReference type="EMDB" id="EMD-28190"/>
<dbReference type="EMDB" id="EMD-28199"/>
<dbReference type="EMDB" id="EMD-28228"/>
<dbReference type="EMDB" id="EMD-28531"/>
<dbReference type="EMDB" id="EMD-28532"/>
<dbReference type="EMDB" id="EMD-28533"/>
<dbReference type="EMDB" id="EMD-28537"/>
<dbReference type="EMDB" id="EMD-28558"/>
<dbReference type="EMDB" id="EMD-28559"/>
<dbReference type="EMDB" id="EMD-28686"/>
<dbReference type="EMDB" id="EMD-28688"/>
<dbReference type="EMDB" id="EMD-28756"/>
<dbReference type="EMDB" id="EMD-28757"/>
<dbReference type="EMDB" id="EMD-28856"/>
<dbReference type="EMDB" id="EMD-28868"/>
<dbReference type="EMDB" id="EMD-28880"/>
<dbReference type="EMDB" id="EMD-28913"/>
<dbReference type="EMDB" id="EMD-28914"/>
<dbReference type="EMDB" id="EMD-28930"/>
<dbReference type="EMDB" id="EMD-28947"/>
<dbReference type="EMDB" id="EMD-28948"/>
<dbReference type="EMDB" id="EMD-29016"/>
<dbReference type="EMDB" id="EMD-29035"/>
<dbReference type="EMDB" id="EMD-29454"/>
<dbReference type="EMDB" id="EMD-29455"/>
<dbReference type="EMDB" id="EMD-29456"/>
<dbReference type="EMDB" id="EMD-29530"/>
<dbReference type="EMDB" id="EMD-29531"/>
<dbReference type="EMDB" id="EMD-29792"/>
<dbReference type="EMDB" id="EMD-29793"/>
<dbReference type="EMDB" id="EMD-29794"/>
<dbReference type="EMDB" id="EMD-29795"/>
<dbReference type="EMDB" id="EMD-29796"/>
<dbReference type="EMDB" id="EMD-29797"/>
<dbReference type="EMDB" id="EMD-29798"/>
<dbReference type="EMDB" id="EMD-29799"/>
<dbReference type="EMDB" id="EMD-29802"/>
<dbReference type="EMDB" id="EMD-29803"/>
<dbReference type="EMDB" id="EMD-29804"/>
<dbReference type="EMDB" id="EMD-29805"/>
<dbReference type="EMDB" id="EMD-29806"/>
<dbReference type="EMDB" id="EMD-29910"/>
<dbReference type="EMDB" id="EMD-29950"/>
<dbReference type="EMDB" id="EMD-30039"/>
<dbReference type="EMDB" id="EMD-30247"/>
<dbReference type="EMDB" id="EMD-30276"/>
<dbReference type="EMDB" id="EMD-30305"/>
<dbReference type="EMDB" id="EMD-30325"/>
<dbReference type="EMDB" id="EMD-30326"/>
<dbReference type="EMDB" id="EMD-30331"/>
<dbReference type="EMDB" id="EMD-30332"/>
<dbReference type="EMDB" id="EMD-30333"/>
<dbReference type="EMDB" id="EMD-30374"/>
<dbReference type="EMDB" id="EMD-30381"/>
<dbReference type="EMDB" id="EMD-30419"/>
<dbReference type="EMDB" id="EMD-30460"/>
<dbReference type="EMDB" id="EMD-30482"/>
<dbReference type="EMDB" id="EMD-30483"/>
<dbReference type="EMDB" id="EMD-30484"/>
<dbReference type="EMDB" id="EMD-30485"/>
<dbReference type="EMDB" id="EMD-30486"/>
<dbReference type="EMDB" id="EMD-30487"/>
<dbReference type="EMDB" id="EMD-30488"/>
<dbReference type="EMDB" id="EMD-30500"/>
<dbReference type="EMDB" id="EMD-30503"/>
<dbReference type="EMDB" id="EMD-30512"/>
<dbReference type="EMDB" id="EMD-30513"/>
<dbReference type="EMDB" id="EMD-30514"/>
<dbReference type="EMDB" id="EMD-30515"/>
<dbReference type="EMDB" id="EMD-30516"/>
<dbReference type="EMDB" id="EMD-30517"/>
<dbReference type="EMDB" id="EMD-30518"/>
<dbReference type="EMDB" id="EMD-30519"/>
<dbReference type="EMDB" id="EMD-30520"/>
<dbReference type="EMDB" id="EMD-30521"/>
<dbReference type="EMDB" id="EMD-30522"/>
<dbReference type="EMDB" id="EMD-30523"/>
<dbReference type="EMDB" id="EMD-30524"/>
<dbReference type="EMDB" id="EMD-30529"/>
<dbReference type="EMDB" id="EMD-30530"/>
<dbReference type="EMDB" id="EMD-30531"/>
<dbReference type="EMDB" id="EMD-30573"/>
<dbReference type="EMDB" id="EMD-30635"/>
<dbReference type="EMDB" id="EMD-30641"/>
<dbReference type="EMDB" id="EMD-30642"/>
<dbReference type="EMDB" id="EMD-30649"/>
<dbReference type="EMDB" id="EMD-30651"/>
<dbReference type="EMDB" id="EMD-30654"/>
<dbReference type="EMDB" id="EMD-30660"/>
<dbReference type="EMDB" id="EMD-30661"/>
<dbReference type="EMDB" id="EMD-30701"/>
<dbReference type="EMDB" id="EMD-30702"/>
<dbReference type="EMDB" id="EMD-30703"/>
<dbReference type="EMDB" id="EMD-30704"/>
<dbReference type="EMDB" id="EMD-30705"/>
<dbReference type="EMDB" id="EMD-30816"/>
<dbReference type="EMDB" id="EMD-30888"/>
<dbReference type="EMDB" id="EMD-30889"/>
<dbReference type="EMDB" id="EMD-30890"/>
<dbReference type="EMDB" id="EMD-30891"/>
<dbReference type="EMDB" id="EMD-30892"/>
<dbReference type="EMDB" id="EMD-30893"/>
<dbReference type="EMDB" id="EMD-30894"/>
<dbReference type="EMDB" id="EMD-30895"/>
<dbReference type="EMDB" id="EMD-30896"/>
<dbReference type="EMDB" id="EMD-30897"/>
<dbReference type="EMDB" id="EMD-30898"/>
<dbReference type="EMDB" id="EMD-30899"/>
<dbReference type="EMDB" id="EMD-30900"/>
<dbReference type="EMDB" id="EMD-30950"/>
<dbReference type="EMDB" id="EMD-30977"/>
<dbReference type="EMDB" id="EMD-30978"/>
<dbReference type="EMDB" id="EMD-30979"/>
<dbReference type="EMDB" id="EMD-30982"/>
<dbReference type="EMDB" id="EMD-30983"/>
<dbReference type="EMDB" id="EMD-30993"/>
<dbReference type="EMDB" id="EMD-30994"/>
<dbReference type="EMDB" id="EMD-31014"/>
<dbReference type="EMDB" id="EMD-31017"/>
<dbReference type="EMDB" id="EMD-31033"/>
<dbReference type="EMDB" id="EMD-31034"/>
<dbReference type="EMDB" id="EMD-31035"/>
<dbReference type="EMDB" id="EMD-31036"/>
<dbReference type="EMDB" id="EMD-31037"/>
<dbReference type="EMDB" id="EMD-31047"/>
<dbReference type="EMDB" id="EMD-31048"/>
<dbReference type="EMDB" id="EMD-31050"/>
<dbReference type="EMDB" id="EMD-31051"/>
<dbReference type="EMDB" id="EMD-31052"/>
<dbReference type="EMDB" id="EMD-31069"/>
<dbReference type="EMDB" id="EMD-31070"/>
<dbReference type="EMDB" id="EMD-31071"/>
<dbReference type="EMDB" id="EMD-31072"/>
<dbReference type="EMDB" id="EMD-31073"/>
<dbReference type="EMDB" id="EMD-31209"/>
<dbReference type="EMDB" id="EMD-31210"/>
<dbReference type="EMDB" id="EMD-31249"/>
<dbReference type="EMDB" id="EMD-31374"/>
<dbReference type="EMDB" id="EMD-31377"/>
<dbReference type="EMDB" id="EMD-31378"/>
<dbReference type="EMDB" id="EMD-31380"/>
<dbReference type="EMDB" id="EMD-31391"/>
<dbReference type="EMDB" id="EMD-31434"/>
<dbReference type="EMDB" id="EMD-31444"/>
<dbReference type="EMDB" id="EMD-31470"/>
<dbReference type="EMDB" id="EMD-31471"/>
<dbReference type="EMDB" id="EMD-31502"/>
<dbReference type="EMDB" id="EMD-31503"/>
<dbReference type="EMDB" id="EMD-31511"/>
<dbReference type="EMDB" id="EMD-31512"/>
<dbReference type="EMDB" id="EMD-31513"/>
<dbReference type="EMDB" id="EMD-31514"/>
<dbReference type="EMDB" id="EMD-31524"/>
<dbReference type="EMDB" id="EMD-31525"/>
<dbReference type="EMDB" id="EMD-31542"/>
<dbReference type="EMDB" id="EMD-31543"/>
<dbReference type="EMDB" id="EMD-31544"/>
<dbReference type="EMDB" id="EMD-31546"/>
<dbReference type="EMDB" id="EMD-31557"/>
<dbReference type="EMDB" id="EMD-31563"/>
<dbReference type="EMDB" id="EMD-31574"/>
<dbReference type="EMDB" id="EMD-31577"/>
<dbReference type="EMDB" id="EMD-31578"/>
<dbReference type="EMDB" id="EMD-31625"/>
<dbReference type="EMDB" id="EMD-31632"/>
<dbReference type="EMDB" id="EMD-31634"/>
<dbReference type="EMDB" id="EMD-31635"/>
<dbReference type="EMDB" id="EMD-31636"/>
<dbReference type="EMDB" id="EMD-31637"/>
<dbReference type="EMDB" id="EMD-31638"/>
<dbReference type="EMDB" id="EMD-31639"/>
<dbReference type="EMDB" id="EMD-31760"/>
<dbReference type="EMDB" id="EMD-31761"/>
<dbReference type="EMDB" id="EMD-31762"/>
<dbReference type="EMDB" id="EMD-31763"/>
<dbReference type="EMDB" id="EMD-31764"/>
<dbReference type="EMDB" id="EMD-31767"/>
<dbReference type="EMDB" id="EMD-31768"/>
<dbReference type="EMDB" id="EMD-31769"/>
<dbReference type="EMDB" id="EMD-31770"/>
<dbReference type="EMDB" id="EMD-31771"/>
<dbReference type="EMDB" id="EMD-31772"/>
<dbReference type="EMDB" id="EMD-31773"/>
<dbReference type="EMDB" id="EMD-31775"/>
<dbReference type="EMDB" id="EMD-31776"/>
<dbReference type="EMDB" id="EMD-31777"/>
<dbReference type="EMDB" id="EMD-31778"/>
<dbReference type="EMDB" id="EMD-31779"/>
<dbReference type="EMDB" id="EMD-31780"/>
<dbReference type="EMDB" id="EMD-31781"/>
<dbReference type="EMDB" id="EMD-31782"/>
<dbReference type="EMDB" id="EMD-31783"/>
<dbReference type="EMDB" id="EMD-31784"/>
<dbReference type="EMDB" id="EMD-31785"/>
<dbReference type="EMDB" id="EMD-31786"/>
<dbReference type="EMDB" id="EMD-31787"/>
<dbReference type="EMDB" id="EMD-31788"/>
<dbReference type="EMDB" id="EMD-31789"/>
<dbReference type="EMDB" id="EMD-31790"/>
<dbReference type="EMDB" id="EMD-31791"/>
<dbReference type="EMDB" id="EMD-31792"/>
<dbReference type="EMDB" id="EMD-31793"/>
<dbReference type="EMDB" id="EMD-31794"/>
<dbReference type="EMDB" id="EMD-31795"/>
<dbReference type="EMDB" id="EMD-31796"/>
<dbReference type="EMDB" id="EMD-31798"/>
<dbReference type="EMDB" id="EMD-31994"/>
<dbReference type="EMDB" id="EMD-31996"/>
<dbReference type="EMDB" id="EMD-31997"/>
<dbReference type="EMDB" id="EMD-31998"/>
<dbReference type="EMDB" id="EMD-31999"/>
<dbReference type="EMDB" id="EMD-32000"/>
<dbReference type="EMDB" id="EMD-32038"/>
<dbReference type="EMDB" id="EMD-32039"/>
<dbReference type="EMDB" id="EMD-32040"/>
<dbReference type="EMDB" id="EMD-32078"/>
<dbReference type="EMDB" id="EMD-32079"/>
<dbReference type="EMDB" id="EMD-32080"/>
<dbReference type="EMDB" id="EMD-32081"/>
<dbReference type="EMDB" id="EMD-32107"/>
<dbReference type="EMDB" id="EMD-32108"/>
<dbReference type="EMDB" id="EMD-32160"/>
<dbReference type="EMDB" id="EMD-32161"/>
<dbReference type="EMDB" id="EMD-32167"/>
<dbReference type="EMDB" id="EMD-32168"/>
<dbReference type="EMDB" id="EMD-32169"/>
<dbReference type="EMDB" id="EMD-32170"/>
<dbReference type="EMDB" id="EMD-32172"/>
<dbReference type="EMDB" id="EMD-32173"/>
<dbReference type="EMDB" id="EMD-32174"/>
<dbReference type="EMDB" id="EMD-32175"/>
<dbReference type="EMDB" id="EMD-32176"/>
<dbReference type="EMDB" id="EMD-32177"/>
<dbReference type="EMDB" id="EMD-32178"/>
<dbReference type="EMDB" id="EMD-32180"/>
<dbReference type="EMDB" id="EMD-32182"/>
<dbReference type="EMDB" id="EMD-32184"/>
<dbReference type="EMDB" id="EMD-32358"/>
<dbReference type="EMDB" id="EMD-32359"/>
<dbReference type="EMDB" id="EMD-32360"/>
<dbReference type="EMDB" id="EMD-32361"/>
<dbReference type="EMDB" id="EMD-32362"/>
<dbReference type="EMDB" id="EMD-32363"/>
<dbReference type="EMDB" id="EMD-32364"/>
<dbReference type="EMDB" id="EMD-32365"/>
<dbReference type="EMDB" id="EMD-32366"/>
<dbReference type="EMDB" id="EMD-32367"/>
<dbReference type="EMDB" id="EMD-32379"/>
<dbReference type="EMDB" id="EMD-32398"/>
<dbReference type="EMDB" id="EMD-32405"/>
<dbReference type="EMDB" id="EMD-32421"/>
<dbReference type="EMDB" id="EMD-32428"/>
<dbReference type="EMDB" id="EMD-32430"/>
<dbReference type="EMDB" id="EMD-32431"/>
<dbReference type="EMDB" id="EMD-32433"/>
<dbReference type="EMDB" id="EMD-32434"/>
<dbReference type="EMDB" id="EMD-32435"/>
<dbReference type="EMDB" id="EMD-32437"/>
<dbReference type="EMDB" id="EMD-32441"/>
<dbReference type="EMDB" id="EMD-32442"/>
<dbReference type="EMDB" id="EMD-32443"/>
<dbReference type="EMDB" id="EMD-32444"/>
<dbReference type="EMDB" id="EMD-32445"/>
<dbReference type="EMDB" id="EMD-32446"/>
<dbReference type="EMDB" id="EMD-32447"/>
<dbReference type="EMDB" id="EMD-32448"/>
<dbReference type="EMDB" id="EMD-32449"/>
<dbReference type="EMDB" id="EMD-32478"/>
<dbReference type="EMDB" id="EMD-32479"/>
<dbReference type="EMDB" id="EMD-32480"/>
<dbReference type="EMDB" id="EMD-32481"/>
<dbReference type="EMDB" id="EMD-32482"/>
<dbReference type="EMDB" id="EMD-32483"/>
<dbReference type="EMDB" id="EMD-32490"/>
<dbReference type="EMDB" id="EMD-32491"/>
<dbReference type="EMDB" id="EMD-32492"/>
<dbReference type="EMDB" id="EMD-32493"/>
<dbReference type="EMDB" id="EMD-32497"/>
<dbReference type="EMDB" id="EMD-32498"/>
<dbReference type="EMDB" id="EMD-32499"/>
<dbReference type="EMDB" id="EMD-32500"/>
<dbReference type="EMDB" id="EMD-32501"/>
<dbReference type="EMDB" id="EMD-32503"/>
<dbReference type="EMDB" id="EMD-32516"/>
<dbReference type="EMDB" id="EMD-32517"/>
<dbReference type="EMDB" id="EMD-32552"/>
<dbReference type="EMDB" id="EMD-32553"/>
<dbReference type="EMDB" id="EMD-32554"/>
<dbReference type="EMDB" id="EMD-32556"/>
<dbReference type="EMDB" id="EMD-32557"/>
<dbReference type="EMDB" id="EMD-32558"/>
<dbReference type="EMDB" id="EMD-32559"/>
<dbReference type="EMDB" id="EMD-32560"/>
<dbReference type="EMDB" id="EMD-32562"/>
<dbReference type="EMDB" id="EMD-32563"/>
<dbReference type="EMDB" id="EMD-32564"/>
<dbReference type="EMDB" id="EMD-32581"/>
<dbReference type="EMDB" id="EMD-32594"/>
<dbReference type="EMDB" id="EMD-32595"/>
<dbReference type="EMDB" id="EMD-32596"/>
<dbReference type="EMDB" id="EMD-32638"/>
<dbReference type="EMDB" id="EMD-32639"/>
<dbReference type="EMDB" id="EMD-32641"/>
<dbReference type="EMDB" id="EMD-32646"/>
<dbReference type="EMDB" id="EMD-32647"/>
<dbReference type="EMDB" id="EMD-32648"/>
<dbReference type="EMDB" id="EMD-32651"/>
<dbReference type="EMDB" id="EMD-32652"/>
<dbReference type="EMDB" id="EMD-32654"/>
<dbReference type="EMDB" id="EMD-32655"/>
<dbReference type="EMDB" id="EMD-32656"/>
<dbReference type="EMDB" id="EMD-32657"/>
<dbReference type="EMDB" id="EMD-32659"/>
<dbReference type="EMDB" id="EMD-32660"/>
<dbReference type="EMDB" id="EMD-32661"/>
<dbReference type="EMDB" id="EMD-32665"/>
<dbReference type="EMDB" id="EMD-32666"/>
<dbReference type="EMDB" id="EMD-32667"/>
<dbReference type="EMDB" id="EMD-32669"/>
<dbReference type="EMDB" id="EMD-32676"/>
<dbReference type="EMDB" id="EMD-32678"/>
<dbReference type="EMDB" id="EMD-32679"/>
<dbReference type="EMDB" id="EMD-32680"/>
<dbReference type="EMDB" id="EMD-32681"/>
<dbReference type="EMDB" id="EMD-32682"/>
<dbReference type="EMDB" id="EMD-32683"/>
<dbReference type="EMDB" id="EMD-32684"/>
<dbReference type="EMDB" id="EMD-32685"/>
<dbReference type="EMDB" id="EMD-32718"/>
<dbReference type="EMDB" id="EMD-32726"/>
<dbReference type="EMDB" id="EMD-32727"/>
<dbReference type="EMDB" id="EMD-32728"/>
<dbReference type="EMDB" id="EMD-32732"/>
<dbReference type="EMDB" id="EMD-32734"/>
<dbReference type="EMDB" id="EMD-32736"/>
<dbReference type="EMDB" id="EMD-32737"/>
<dbReference type="EMDB" id="EMD-32738"/>
<dbReference type="EMDB" id="EMD-32739"/>
<dbReference type="EMDB" id="EMD-32740"/>
<dbReference type="EMDB" id="EMD-32741"/>
<dbReference type="EMDB" id="EMD-32742"/>
<dbReference type="EMDB" id="EMD-32743"/>
<dbReference type="EMDB" id="EMD-32744"/>
<dbReference type="EMDB" id="EMD-32748"/>
<dbReference type="EMDB" id="EMD-32749"/>
<dbReference type="EMDB" id="EMD-32750"/>
<dbReference type="EMDB" id="EMD-32751"/>
<dbReference type="EMDB" id="EMD-32752"/>
<dbReference type="EMDB" id="EMD-32753"/>
<dbReference type="EMDB" id="EMD-32755"/>
<dbReference type="EMDB" id="EMD-32758"/>
<dbReference type="EMDB" id="EMD-32770"/>
<dbReference type="EMDB" id="EMD-32771"/>
<dbReference type="EMDB" id="EMD-32772"/>
<dbReference type="EMDB" id="EMD-32784"/>
<dbReference type="EMDB" id="EMD-32785"/>
<dbReference type="EMDB" id="EMD-32786"/>
<dbReference type="EMDB" id="EMD-32787"/>
<dbReference type="EMDB" id="EMD-32788"/>
<dbReference type="EMDB" id="EMD-32789"/>
<dbReference type="EMDB" id="EMD-32832"/>
<dbReference type="EMDB" id="EMD-32854"/>
<dbReference type="EMDB" id="EMD-32855"/>
<dbReference type="EMDB" id="EMD-32856"/>
<dbReference type="EMDB" id="EMD-32857"/>
<dbReference type="EMDB" id="EMD-32866"/>
<dbReference type="EMDB" id="EMD-32867"/>
<dbReference type="EMDB" id="EMD-32868"/>
<dbReference type="EMDB" id="EMD-32869"/>
<dbReference type="EMDB" id="EMD-32871"/>
<dbReference type="EMDB" id="EMD-32901"/>
<dbReference type="EMDB" id="EMD-32902"/>
<dbReference type="EMDB" id="EMD-32920"/>
<dbReference type="EMDB" id="EMD-32944"/>
<dbReference type="EMDB" id="EMD-33019"/>
<dbReference type="EMDB" id="EMD-33042"/>
<dbReference type="EMDB" id="EMD-33045"/>
<dbReference type="EMDB" id="EMD-33047"/>
<dbReference type="EMDB" id="EMD-33048"/>
<dbReference type="EMDB" id="EMD-33059"/>
<dbReference type="EMDB" id="EMD-33060"/>
<dbReference type="EMDB" id="EMD-33061"/>
<dbReference type="EMDB" id="EMD-33062"/>
<dbReference type="EMDB" id="EMD-33063"/>
<dbReference type="EMDB" id="EMD-33064"/>
<dbReference type="EMDB" id="EMD-33065"/>
<dbReference type="EMDB" id="EMD-33066"/>
<dbReference type="EMDB" id="EMD-33067"/>
<dbReference type="EMDB" id="EMD-33068"/>
<dbReference type="EMDB" id="EMD-33120"/>
<dbReference type="EMDB" id="EMD-33121"/>
<dbReference type="EMDB" id="EMD-33123"/>
<dbReference type="EMDB" id="EMD-33124"/>
<dbReference type="EMDB" id="EMD-33125"/>
<dbReference type="EMDB" id="EMD-33130"/>
<dbReference type="EMDB" id="EMD-33133"/>
<dbReference type="EMDB" id="EMD-33140"/>
<dbReference type="EMDB" id="EMD-33142"/>
<dbReference type="EMDB" id="EMD-33150"/>
<dbReference type="EMDB" id="EMD-33151"/>
<dbReference type="EMDB" id="EMD-33191"/>
<dbReference type="EMDB" id="EMD-33202"/>
<dbReference type="EMDB" id="EMD-33203"/>
<dbReference type="EMDB" id="EMD-33210"/>
<dbReference type="EMDB" id="EMD-33211"/>
<dbReference type="EMDB" id="EMD-33212"/>
<dbReference type="EMDB" id="EMD-33213"/>
<dbReference type="EMDB" id="EMD-33220"/>
<dbReference type="EMDB" id="EMD-33221"/>
<dbReference type="EMDB" id="EMD-33222"/>
<dbReference type="EMDB" id="EMD-33307"/>
<dbReference type="EMDB" id="EMD-33308"/>
<dbReference type="EMDB" id="EMD-33323"/>
<dbReference type="EMDB" id="EMD-33324"/>
<dbReference type="EMDB" id="EMD-33325"/>
<dbReference type="EMDB" id="EMD-33336"/>
<dbReference type="EMDB" id="EMD-33337"/>
<dbReference type="EMDB" id="EMD-33338"/>
<dbReference type="EMDB" id="EMD-33339"/>
<dbReference type="EMDB" id="EMD-33340"/>
<dbReference type="EMDB" id="EMD-33341"/>
<dbReference type="EMDB" id="EMD-33342"/>
<dbReference type="EMDB" id="EMD-33343"/>
<dbReference type="EMDB" id="EMD-33344"/>
<dbReference type="EMDB" id="EMD-33345"/>
<dbReference type="EMDB" id="EMD-33346"/>
<dbReference type="EMDB" id="EMD-33347"/>
<dbReference type="EMDB" id="EMD-33416"/>
<dbReference type="EMDB" id="EMD-33434"/>
<dbReference type="EMDB" id="EMD-33453"/>
<dbReference type="EMDB" id="EMD-33454"/>
<dbReference type="EMDB" id="EMD-33455"/>
<dbReference type="EMDB" id="EMD-33456"/>
<dbReference type="EMDB" id="EMD-33457"/>
<dbReference type="EMDB" id="EMD-33458"/>
<dbReference type="EMDB" id="EMD-33459"/>
<dbReference type="EMDB" id="EMD-33460"/>
<dbReference type="EMDB" id="EMD-33462"/>
<dbReference type="EMDB" id="EMD-33463"/>
<dbReference type="EMDB" id="EMD-33464"/>
<dbReference type="EMDB" id="EMD-33506"/>
<dbReference type="EMDB" id="EMD-33509"/>
<dbReference type="EMDB" id="EMD-33510"/>
<dbReference type="EMDB" id="EMD-33550"/>
<dbReference type="EMDB" id="EMD-33551"/>
<dbReference type="EMDB" id="EMD-33552"/>
<dbReference type="EMDB" id="EMD-33575"/>
<dbReference type="EMDB" id="EMD-33576"/>
<dbReference type="EMDB" id="EMD-33577"/>
<dbReference type="EMDB" id="EMD-33578"/>
<dbReference type="EMDB" id="EMD-33600"/>
<dbReference type="EMDB" id="EMD-33642"/>
<dbReference type="EMDB" id="EMD-33643"/>
<dbReference type="EMDB" id="EMD-33644"/>
<dbReference type="EMDB" id="EMD-33650"/>
<dbReference type="EMDB" id="EMD-33651"/>
<dbReference type="EMDB" id="EMD-33652"/>
<dbReference type="EMDB" id="EMD-33653"/>
<dbReference type="EMDB" id="EMD-33667"/>
<dbReference type="EMDB" id="EMD-33668"/>
<dbReference type="EMDB" id="EMD-33690"/>
<dbReference type="EMDB" id="EMD-33697"/>
<dbReference type="EMDB" id="EMD-33698"/>
<dbReference type="EMDB" id="EMD-33699"/>
<dbReference type="EMDB" id="EMD-33709"/>
<dbReference type="EMDB" id="EMD-33721"/>
<dbReference type="EMDB" id="EMD-33722"/>
<dbReference type="EMDB" id="EMD-33723"/>
<dbReference type="EMDB" id="EMD-33724"/>
<dbReference type="EMDB" id="EMD-33725"/>
<dbReference type="EMDB" id="EMD-33726"/>
<dbReference type="EMDB" id="EMD-33727"/>
<dbReference type="EMDB" id="EMD-33734"/>
<dbReference type="EMDB" id="EMD-33742"/>
<dbReference type="EMDB" id="EMD-33743"/>
<dbReference type="EMDB" id="EMD-33744"/>
<dbReference type="EMDB" id="EMD-33745"/>
<dbReference type="EMDB" id="EMD-33748"/>
<dbReference type="EMDB" id="EMD-33760"/>
<dbReference type="EMDB" id="EMD-33764"/>
<dbReference type="EMDB" id="EMD-33766"/>
<dbReference type="EMDB" id="EMD-33772"/>
<dbReference type="EMDB" id="EMD-33820"/>
<dbReference type="EMDB" id="EMD-33821"/>
<dbReference type="EMDB" id="EMD-33822"/>
<dbReference type="EMDB" id="EMD-33823"/>
<dbReference type="EMDB" id="EMD-33824"/>
<dbReference type="EMDB" id="EMD-33825"/>
<dbReference type="EMDB" id="EMD-33826"/>
<dbReference type="EMDB" id="EMD-33827"/>
<dbReference type="EMDB" id="EMD-33828"/>
<dbReference type="EMDB" id="EMD-33829"/>
<dbReference type="EMDB" id="EMD-33830"/>
<dbReference type="EMDB" id="EMD-33841"/>
<dbReference type="EMDB" id="EMD-33870"/>
<dbReference type="EMDB" id="EMD-33892"/>
<dbReference type="EMDB" id="EMD-33923"/>
<dbReference type="EMDB" id="EMD-33972"/>
<dbReference type="EMDB" id="EMD-33973"/>
<dbReference type="EMDB" id="EMD-33974"/>
<dbReference type="EMDB" id="EMD-33975"/>
<dbReference type="EMDB" id="EMD-34031"/>
<dbReference type="EMDB" id="EMD-34032"/>
<dbReference type="EMDB" id="EMD-34034"/>
<dbReference type="EMDB" id="EMD-34035"/>
<dbReference type="EMDB" id="EMD-34036"/>
<dbReference type="EMDB" id="EMD-34037"/>
<dbReference type="EMDB" id="EMD-34038"/>
<dbReference type="EMDB" id="EMD-34039"/>
<dbReference type="EMDB" id="EMD-34040"/>
<dbReference type="EMDB" id="EMD-34041"/>
<dbReference type="EMDB" id="EMD-34042"/>
<dbReference type="EMDB" id="EMD-34043"/>
<dbReference type="EMDB" id="EMD-34044"/>
<dbReference type="EMDB" id="EMD-34045"/>
<dbReference type="EMDB" id="EMD-34120"/>
<dbReference type="EMDB" id="EMD-34124"/>
<dbReference type="EMDB" id="EMD-34125"/>
<dbReference type="EMDB" id="EMD-34126"/>
<dbReference type="EMDB" id="EMD-34127"/>
<dbReference type="EMDB" id="EMD-34128"/>
<dbReference type="EMDB" id="EMD-34129"/>
<dbReference type="EMDB" id="EMD-34130"/>
<dbReference type="EMDB" id="EMD-34131"/>
<dbReference type="EMDB" id="EMD-34132"/>
<dbReference type="EMDB" id="EMD-34133"/>
<dbReference type="EMDB" id="EMD-34134"/>
<dbReference type="EMDB" id="EMD-34135"/>
<dbReference type="EMDB" id="EMD-34138"/>
<dbReference type="EMDB" id="EMD-34164"/>
<dbReference type="EMDB" id="EMD-34181"/>
<dbReference type="EMDB" id="EMD-34217"/>
<dbReference type="EMDB" id="EMD-34221"/>
<dbReference type="EMDB" id="EMD-34222"/>
<dbReference type="EMDB" id="EMD-34223"/>
<dbReference type="EMDB" id="EMD-34224"/>
<dbReference type="EMDB" id="EMD-34226"/>
<dbReference type="EMDB" id="EMD-34228"/>
<dbReference type="EMDB" id="EMD-34259"/>
<dbReference type="EMDB" id="EMD-34261"/>
<dbReference type="EMDB" id="EMD-34263"/>
<dbReference type="EMDB" id="EMD-34406"/>
<dbReference type="EMDB" id="EMD-34407"/>
<dbReference type="EMDB" id="EMD-34408"/>
<dbReference type="EMDB" id="EMD-34409"/>
<dbReference type="EMDB" id="EMD-34410"/>
<dbReference type="EMDB" id="EMD-34411"/>
<dbReference type="EMDB" id="EMD-34469"/>
<dbReference type="EMDB" id="EMD-34470"/>
<dbReference type="EMDB" id="EMD-34501"/>
<dbReference type="EMDB" id="EMD-34522"/>
<dbReference type="EMDB" id="EMD-34526"/>
<dbReference type="EMDB" id="EMD-34649"/>
<dbReference type="EMDB" id="EMD-34650"/>
<dbReference type="EMDB" id="EMD-34651"/>
<dbReference type="EMDB" id="EMD-34652"/>
<dbReference type="EMDB" id="EMD-34653"/>
<dbReference type="EMDB" id="EMD-34654"/>
<dbReference type="EMDB" id="EMD-34655"/>
<dbReference type="EMDB" id="EMD-34656"/>
<dbReference type="EMDB" id="EMD-34657"/>
<dbReference type="EMDB" id="EMD-34658"/>
<dbReference type="EMDB" id="EMD-34686"/>
<dbReference type="EMDB" id="EMD-34687"/>
<dbReference type="EMDB" id="EMD-34688"/>
<dbReference type="EMDB" id="EMD-34728"/>
<dbReference type="EMDB" id="EMD-34729"/>
<dbReference type="EMDB" id="EMD-34730"/>
<dbReference type="EMDB" id="EMD-34741"/>
<dbReference type="EMDB" id="EMD-34742"/>
<dbReference type="EMDB" id="EMD-34806"/>
<dbReference type="EMDB" id="EMD-34807"/>
<dbReference type="EMDB" id="EMD-34808"/>
<dbReference type="EMDB" id="EMD-34872"/>
<dbReference type="EMDB" id="EMD-34874"/>
<dbReference type="EMDB" id="EMD-34928"/>
<dbReference type="EMDB" id="EMD-34931"/>
<dbReference type="EMDB" id="EMD-34940"/>
<dbReference type="EMDB" id="EMD-34944"/>
<dbReference type="EMDB" id="EMD-34945"/>
<dbReference type="EMDB" id="EMD-34946"/>
<dbReference type="EMDB" id="EMD-34974"/>
<dbReference type="EMDB" id="EMD-34975"/>
<dbReference type="EMDB" id="EMD-34976"/>
<dbReference type="EMDB" id="EMD-34977"/>
<dbReference type="EMDB" id="EMD-35063"/>
<dbReference type="EMDB" id="EMD-35064"/>
<dbReference type="EMDB" id="EMD-35078"/>
<dbReference type="EMDB" id="EMD-35155"/>
<dbReference type="EMDB" id="EMD-35156"/>
<dbReference type="EMDB" id="EMD-35170"/>
<dbReference type="EMDB" id="EMD-35171"/>
<dbReference type="EMDB" id="EMD-35172"/>
<dbReference type="EMDB" id="EMD-35173"/>
<dbReference type="EMDB" id="EMD-35264"/>
<dbReference type="EMDB" id="EMD-35266"/>
<dbReference type="EMDB" id="EMD-35267"/>
<dbReference type="EMDB" id="EMD-35268"/>
<dbReference type="EMDB" id="EMD-35269"/>
<dbReference type="EMDB" id="EMD-35270"/>
<dbReference type="EMDB" id="EMD-35272"/>
<dbReference type="EMDB" id="EMD-35369"/>
<dbReference type="EMDB" id="EMD-35426"/>
<dbReference type="EMDB" id="EMD-35427"/>
<dbReference type="EMDB" id="EMD-35622"/>
<dbReference type="EMDB" id="EMD-35623"/>
<dbReference type="EMDB" id="EMD-35624"/>
<dbReference type="EMDB" id="EMD-35625"/>
<dbReference type="EMDB" id="EMD-35626"/>
<dbReference type="EMDB" id="EMD-35740"/>
<dbReference type="EMDB" id="EMD-35741"/>
<dbReference type="EMDB" id="EMD-35746"/>
<dbReference type="EMDB" id="EMD-35755"/>
<dbReference type="EMDB" id="EMD-35788"/>
<dbReference type="EMDB" id="EMD-35930"/>
<dbReference type="EMDB" id="EMD-35932"/>
<dbReference type="EMDB" id="EMD-35934"/>
<dbReference type="EMDB" id="EMD-35945"/>
<dbReference type="EMDB" id="EMD-36321"/>
<dbReference type="EMDB" id="EMD-36322"/>
<dbReference type="EMDB" id="EMD-36345"/>
<dbReference type="EMDB" id="EMD-36423"/>
<dbReference type="EMDB" id="EMD-36672"/>
<dbReference type="EMDB" id="EMD-36724"/>
<dbReference type="EMDB" id="EMD-36726"/>
<dbReference type="EMDB" id="EMD-36727"/>
<dbReference type="EMDB" id="EMD-36728"/>
<dbReference type="EMDB" id="EMD-36729"/>
<dbReference type="EMDB" id="EMD-36730"/>
<dbReference type="EMDB" id="EMD-36788"/>
<dbReference type="EMDB" id="EMD-36789"/>
<dbReference type="EMDB" id="EMD-36877"/>
<dbReference type="EMDB" id="EMD-36878"/>
<dbReference type="EMDB" id="EMD-36879"/>
<dbReference type="EMDB" id="EMD-36905"/>
<dbReference type="EMDB" id="EMD-36906"/>
<dbReference type="EMDB" id="EMD-36983"/>
<dbReference type="EMDB" id="EMD-36988"/>
<dbReference type="EMDB" id="EMD-36991"/>
<dbReference type="EMDB" id="EMD-37006"/>
<dbReference type="EMDB" id="EMD-37090"/>
<dbReference type="EMDB" id="EMD-37143"/>
<dbReference type="EMDB" id="EMD-37157"/>
<dbReference type="EMDB" id="EMD-37160"/>
<dbReference type="EMDB" id="EMD-37162"/>
<dbReference type="EMDB" id="EMD-37163"/>
<dbReference type="EMDB" id="EMD-37164"/>
<dbReference type="EMDB" id="EMD-37165"/>
<dbReference type="EMDB" id="EMD-37240"/>
<dbReference type="EMDB" id="EMD-37241"/>
<dbReference type="EMDB" id="EMD-37467"/>
<dbReference type="EMDB" id="EMD-37468"/>
<dbReference type="EMDB" id="EMD-37469"/>
<dbReference type="EMDB" id="EMD-37470"/>
<dbReference type="EMDB" id="EMD-37471"/>
<dbReference type="EMDB" id="EMD-37516"/>
<dbReference type="EMDB" id="EMD-37517"/>
<dbReference type="EMDB" id="EMD-37546"/>
<dbReference type="EMDB" id="EMD-37548"/>
<dbReference type="EMDB" id="EMD-37549"/>
<dbReference type="EMDB" id="EMD-37550"/>
<dbReference type="EMDB" id="EMD-37553"/>
<dbReference type="EMDB" id="EMD-37626"/>
<dbReference type="EMDB" id="EMD-37629"/>
<dbReference type="EMDB" id="EMD-37648"/>
<dbReference type="EMDB" id="EMD-37650"/>
<dbReference type="EMDB" id="EMD-37651"/>
<dbReference type="EMDB" id="EMD-37701"/>
<dbReference type="EMDB" id="EMD-37702"/>
<dbReference type="EMDB" id="EMD-37711"/>
<dbReference type="EMDB" id="EMD-37725"/>
<dbReference type="EMDB" id="EMD-37726"/>
<dbReference type="EMDB" id="EMD-37776"/>
<dbReference type="EMDB" id="EMD-37779"/>
<dbReference type="EMDB" id="EMD-37781"/>
<dbReference type="EMDB" id="EMD-37784"/>
<dbReference type="EMDB" id="EMD-37832"/>
<dbReference type="EMDB" id="EMD-37835"/>
<dbReference type="EMDB" id="EMD-37910"/>
<dbReference type="EMDB" id="EMD-37928"/>
<dbReference type="EMDB" id="EMD-37930"/>
<dbReference type="EMDB" id="EMD-37953"/>
<dbReference type="EMDB" id="EMD-38049"/>
<dbReference type="EMDB" id="EMD-38056"/>
<dbReference type="EMDB" id="EMD-38057"/>
<dbReference type="EMDB" id="EMD-38063"/>
<dbReference type="EMDB" id="EMD-38064"/>
<dbReference type="EMDB" id="EMD-38072"/>
<dbReference type="EMDB" id="EMD-38073"/>
<dbReference type="EMDB" id="EMD-38201"/>
<dbReference type="EMDB" id="EMD-38216"/>
<dbReference type="EMDB" id="EMD-38283"/>
<dbReference type="EMDB" id="EMD-38284"/>
<dbReference type="EMDB" id="EMD-38288"/>
<dbReference type="EMDB" id="EMD-38372"/>
<dbReference type="EMDB" id="EMD-38418"/>
<dbReference type="EMDB" id="EMD-38453"/>
<dbReference type="EMDB" id="EMD-38454"/>
<dbReference type="EMDB" id="EMD-38460"/>
<dbReference type="EMDB" id="EMD-38463"/>
<dbReference type="EMDB" id="EMD-38476"/>
<dbReference type="EMDB" id="EMD-38488"/>
<dbReference type="EMDB" id="EMD-38495"/>
<dbReference type="EMDB" id="EMD-38496"/>
<dbReference type="EMDB" id="EMD-38498"/>
<dbReference type="EMDB" id="EMD-38502"/>
<dbReference type="EMDB" id="EMD-38505"/>
<dbReference type="EMDB" id="EMD-38610"/>
<dbReference type="EMDB" id="EMD-38616"/>
<dbReference type="EMDB" id="EMD-38617"/>
<dbReference type="EMDB" id="EMD-38618"/>
<dbReference type="EMDB" id="EMD-38619"/>
<dbReference type="EMDB" id="EMD-38620"/>
<dbReference type="EMDB" id="EMD-38621"/>
<dbReference type="EMDB" id="EMD-38681"/>
<dbReference type="EMDB" id="EMD-38682"/>
<dbReference type="EMDB" id="EMD-38683"/>
<dbReference type="EMDB" id="EMD-38684"/>
<dbReference type="EMDB" id="EMD-38686"/>
<dbReference type="EMDB" id="EMD-38687"/>
<dbReference type="EMDB" id="EMD-38688"/>
<dbReference type="EMDB" id="EMD-38689"/>
<dbReference type="EMDB" id="EMD-38763"/>
<dbReference type="EMDB" id="EMD-38773"/>
<dbReference type="EMDB" id="EMD-38778"/>
<dbReference type="EMDB" id="EMD-38779"/>
<dbReference type="EMDB" id="EMD-38784"/>
<dbReference type="EMDB" id="EMD-38789"/>
<dbReference type="EMDB" id="EMD-38790"/>
<dbReference type="EMDB" id="EMD-38791"/>
<dbReference type="EMDB" id="EMD-38793"/>
<dbReference type="EMDB" id="EMD-38823"/>
<dbReference type="EMDB" id="EMD-38826"/>
<dbReference type="EMDB" id="EMD-38827"/>
<dbReference type="EMDB" id="EMD-38866"/>
<dbReference type="EMDB" id="EMD-38914"/>
<dbReference type="EMDB" id="EMD-38915"/>
<dbReference type="EMDB" id="EMD-38937"/>
<dbReference type="EMDB" id="EMD-38983"/>
<dbReference type="EMDB" id="EMD-39184"/>
<dbReference type="EMDB" id="EMD-39185"/>
<dbReference type="EMDB" id="EMD-39186"/>
<dbReference type="EMDB" id="EMD-39208"/>
<dbReference type="EMDB" id="EMD-39229"/>
<dbReference type="EMDB" id="EMD-39370"/>
<dbReference type="EMDB" id="EMD-39371"/>
<dbReference type="EMDB" id="EMD-39372"/>
<dbReference type="EMDB" id="EMD-39546"/>
<dbReference type="EMDB" id="EMD-39547"/>
<dbReference type="EMDB" id="EMD-39645"/>
<dbReference type="EMDB" id="EMD-39646"/>
<dbReference type="EMDB" id="EMD-39685"/>
<dbReference type="EMDB" id="EMD-39686"/>
<dbReference type="EMDB" id="EMD-39756"/>
<dbReference type="EMDB" id="EMD-39771"/>
<dbReference type="EMDB" id="EMD-39791"/>
<dbReference type="EMDB" id="EMD-39796"/>
<dbReference type="EMDB" id="EMD-39811"/>
<dbReference type="EMDB" id="EMD-39813"/>
<dbReference type="EMDB" id="EMD-39819"/>
<dbReference type="EMDB" id="EMD-39822"/>
<dbReference type="EMDB" id="EMD-39839"/>
<dbReference type="EMDB" id="EMD-39907"/>
<dbReference type="EMDB" id="EMD-39916"/>
<dbReference type="EMDB" id="EMD-39917"/>
<dbReference type="EMDB" id="EMD-39918"/>
<dbReference type="EMDB" id="EMD-39919"/>
<dbReference type="EMDB" id="EMD-39920"/>
<dbReference type="EMDB" id="EMD-39921"/>
<dbReference type="EMDB" id="EMD-39922"/>
<dbReference type="EMDB" id="EMD-39923"/>
<dbReference type="EMDB" id="EMD-39924"/>
<dbReference type="EMDB" id="EMD-40094"/>
<dbReference type="EMDB" id="EMD-40095"/>
<dbReference type="EMDB" id="EMD-40240"/>
<dbReference type="EMDB" id="EMD-40814"/>
<dbReference type="EMDB" id="EMD-40976"/>
<dbReference type="EMDB" id="EMD-40978"/>
<dbReference type="EMDB" id="EMD-40979"/>
<dbReference type="EMDB" id="EMD-40980"/>
<dbReference type="EMDB" id="EMD-41143"/>
<dbReference type="EMDB" id="EMD-41260"/>
<dbReference type="EMDB" id="EMD-41374"/>
<dbReference type="EMDB" id="EMD-41382"/>
<dbReference type="EMDB" id="EMD-41725"/>
<dbReference type="EMDB" id="EMD-41727"/>
<dbReference type="EMDB" id="EMD-41841"/>
<dbReference type="EMDB" id="EMD-42218"/>
<dbReference type="EMDB" id="EMD-42302"/>
<dbReference type="EMDB" id="EMD-42342"/>
<dbReference type="EMDB" id="EMD-42352"/>
<dbReference type="EMDB" id="EMD-42353"/>
<dbReference type="EMDB" id="EMD-42524"/>
<dbReference type="EMDB" id="EMD-42589"/>
<dbReference type="EMDB" id="EMD-42590"/>
<dbReference type="EMDB" id="EMD-42591"/>
<dbReference type="EMDB" id="EMD-42592"/>
<dbReference type="EMDB" id="EMD-42860"/>
<dbReference type="EMDB" id="EMD-42861"/>
<dbReference type="EMDB" id="EMD-42862"/>
<dbReference type="EMDB" id="EMD-42863"/>
<dbReference type="EMDB" id="EMD-42864"/>
<dbReference type="EMDB" id="EMD-42866"/>
<dbReference type="EMDB" id="EMD-42867"/>
<dbReference type="EMDB" id="EMD-42868"/>
<dbReference type="EMDB" id="EMD-42869"/>
<dbReference type="EMDB" id="EMD-42870"/>
<dbReference type="EMDB" id="EMD-42871"/>
<dbReference type="EMDB" id="EMD-42872"/>
<dbReference type="EMDB" id="EMD-42873"/>
<dbReference type="EMDB" id="EMD-42970"/>
<dbReference type="EMDB" id="EMD-43097"/>
<dbReference type="EMDB" id="EMD-43139"/>
<dbReference type="EMDB" id="EMD-43255"/>
<dbReference type="EMDB" id="EMD-43260"/>
<dbReference type="EMDB" id="EMD-43315"/>
<dbReference type="EMDB" id="EMD-43320"/>
<dbReference type="EMDB" id="EMD-43321"/>
<dbReference type="EMDB" id="EMD-43322"/>
<dbReference type="EMDB" id="EMD-43323"/>
<dbReference type="EMDB" id="EMD-43324"/>
<dbReference type="EMDB" id="EMD-43325"/>
<dbReference type="EMDB" id="EMD-43435"/>
<dbReference type="EMDB" id="EMD-43436"/>
<dbReference type="EMDB" id="EMD-43437"/>
<dbReference type="EMDB" id="EMD-43658"/>
<dbReference type="EMDB" id="EMD-43659"/>
<dbReference type="EMDB" id="EMD-43660"/>
<dbReference type="EMDB" id="EMD-43794"/>
<dbReference type="EMDB" id="EMD-43813"/>
<dbReference type="EMDB" id="EMD-43831"/>
<dbReference type="EMDB" id="EMD-43832"/>
<dbReference type="EMDB" id="EMD-43842"/>
<dbReference type="EMDB" id="EMD-44000"/>
<dbReference type="EMDB" id="EMD-44001"/>
<dbReference type="EMDB" id="EMD-44002"/>
<dbReference type="EMDB" id="EMD-44062"/>
<dbReference type="EMDB" id="EMD-44116"/>
<dbReference type="EMDB" id="EMD-44627"/>
<dbReference type="EMDB" id="EMD-44628"/>
<dbReference type="EMDB" id="EMD-44629"/>
<dbReference type="EMDB" id="EMD-44666"/>
<dbReference type="EMDB" id="EMD-45174"/>
<dbReference type="EMDB" id="EMD-45175"/>
<dbReference type="EMDB" id="EMD-45443"/>
<dbReference type="EMDB" id="EMD-45444"/>
<dbReference type="EMDB" id="EMD-45771"/>
<dbReference type="EMDB" id="EMD-45772"/>
<dbReference type="EMDB" id="EMD-45773"/>
<dbReference type="EMDB" id="EMD-45774"/>
<dbReference type="EMDB" id="EMD-45863"/>
<dbReference type="EMDB" id="EMD-45864"/>
<dbReference type="EMDB" id="EMD-45865"/>
<dbReference type="EMDB" id="EMD-45866"/>
<dbReference type="EMDB" id="EMD-45867"/>
<dbReference type="EMDB" id="EMD-45868"/>
<dbReference type="EMDB" id="EMD-45869"/>
<dbReference type="EMDB" id="EMD-45893"/>
<dbReference type="EMDB" id="EMD-45895"/>
<dbReference type="EMDB" id="EMD-45965"/>
<dbReference type="EMDB" id="EMD-45987"/>
<dbReference type="EMDB" id="EMD-48839"/>
<dbReference type="EMDB" id="EMD-50417"/>
<dbReference type="EMDB" id="EMD-50418"/>
<dbReference type="EMDB" id="EMD-50423"/>
<dbReference type="EMDB" id="EMD-50425"/>
<dbReference type="EMDB" id="EMD-50426"/>
<dbReference type="EMDB" id="EMD-50427"/>
<dbReference type="EMDB" id="EMD-50429"/>
<dbReference type="EMDB" id="EMD-60110"/>
<dbReference type="EMDB" id="EMD-60111"/>
<dbReference type="EMDB" id="EMD-60886"/>
<dbReference type="EMDB" id="EMD-60911"/>
<dbReference type="EMDB" id="EMD-60912"/>
<dbReference type="EMDB" id="EMD-60914"/>
<dbReference type="EMDB" id="EMD-61167"/>
<dbReference type="EMDB" id="EMD-61766"/>
<dbReference type="EMDB" id="EMD-62925"/>
<dbReference type="SASBDB" id="P0DTC2"/>
<dbReference type="SMR" id="P0DTC2"/>
<dbReference type="BioGRID" id="4383848">
    <property type="interactions" value="2330"/>
</dbReference>
<dbReference type="ComplexPortal" id="CPX-5682">
    <property type="entry name" value="SARS-CoV-2 cleaved Spike protein complex"/>
</dbReference>
<dbReference type="ComplexPortal" id="CPX-7042">
    <property type="entry name" value="SARS-CoV-2 uncleaved Spike protein complex"/>
</dbReference>
<dbReference type="ComplexPortal" id="CPX-7043">
    <property type="entry name" value="SARS-CoV-2 post-fusion S2 Spike complex"/>
</dbReference>
<dbReference type="FunCoup" id="P0DTC2">
    <property type="interactions" value="66"/>
</dbReference>
<dbReference type="IntAct" id="P0DTC2">
    <property type="interactions" value="208"/>
</dbReference>
<dbReference type="MINT" id="P0DTC2"/>
<dbReference type="BindingDB" id="P0DTC2"/>
<dbReference type="ChEMBL" id="CHEMBL4662936"/>
<dbReference type="DrugBank" id="DB15691">
    <property type="generic name" value="Anti-SARS-CoV-2 REGN-COV2"/>
</dbReference>
<dbReference type="DrugBank" id="DB15718">
    <property type="generic name" value="Bamlanivimab"/>
</dbReference>
<dbReference type="DrugBank" id="DB16755">
    <property type="generic name" value="Bebtelovimab"/>
</dbReference>
<dbReference type="DrugBank" id="DB12411">
    <property type="generic name" value="Bemcentinib"/>
</dbReference>
<dbReference type="DrugBank" id="DB15941">
    <property type="generic name" value="Casirivimab"/>
</dbReference>
<dbReference type="DrugBank" id="DB16393">
    <property type="generic name" value="Cilgavimab"/>
</dbReference>
<dbReference type="DrugBank" id="DB15897">
    <property type="generic name" value="Etesevimab"/>
</dbReference>
<dbReference type="DrugBank" id="DB15940">
    <property type="generic name" value="Imdevimab"/>
</dbReference>
<dbReference type="DrugBank" id="DB18720">
    <property type="generic name" value="Pemivibart"/>
</dbReference>
<dbReference type="DrugBank" id="DB16405">
    <property type="generic name" value="Regdanvimab"/>
</dbReference>
<dbReference type="DrugBank" id="DB16355">
    <property type="generic name" value="Sotrovimab"/>
</dbReference>
<dbReference type="DrugBank" id="DB16394">
    <property type="generic name" value="Tixagevimab"/>
</dbReference>
<dbReference type="DrugCentral" id="P0DTC2"/>
<dbReference type="UniLectin" id="P0DTC2"/>
<dbReference type="GlyConnect" id="2838">
    <property type="glycosylation" value="126 N-Linked glycans (16 sites), 4 O-Linked glycans (2 sites)"/>
</dbReference>
<dbReference type="GlyConnect" id="2839">
    <property type="glycosylation" value="81 N-Linked glycans (21 sites)"/>
</dbReference>
<dbReference type="GlyConnect" id="2840">
    <property type="glycosylation" value="109 N-Linked glycans (22 sites)"/>
</dbReference>
<dbReference type="GlyConnect" id="2951">
    <property type="glycosylation" value="2 O-Linked glycans (6 sites)"/>
</dbReference>
<dbReference type="GlyConnect" id="2952">
    <property type="glycosylation" value="2 O-Linked glycans (18 sites)"/>
</dbReference>
<dbReference type="GlyConnect" id="2953">
    <property type="glycosylation" value="2 O-Linked glycans (13 sites)"/>
</dbReference>
<dbReference type="GlyConnect" id="2956">
    <property type="glycosylation" value="74 N-Linked glycans (2 sites), 20 O-Linked glycans (1 site)"/>
</dbReference>
<dbReference type="GlyConnect" id="2957">
    <property type="glycosylation" value="35 N-Linked glycans (2 sites), 17 O-Linked glycans (1 site)"/>
</dbReference>
<dbReference type="GlyCosmos" id="P0DTC2">
    <property type="glycosylation" value="43 sites, 374 glycans"/>
</dbReference>
<dbReference type="GlyGen" id="P0DTC2">
    <property type="glycosylation" value="50 sites, 320 N-linked glycans (23 sites), 34 N-linked;o-linked glycans (22 sites), 20 O-linked glycans (28 sites), 15 Undefined type glycans (1 site)"/>
</dbReference>
<dbReference type="iPTMnet" id="P0DTC2"/>
<dbReference type="ABCD" id="P0DTC2">
    <property type="antibodies" value="942 sequenced antibodies"/>
</dbReference>
<dbReference type="DNASU" id="43740568"/>
<dbReference type="GeneID" id="43740568"/>
<dbReference type="AGR" id="RefSeq:YP_009724390"/>
<dbReference type="Reactome" id="R-HSA-9694322">
    <property type="pathway name" value="Virion Assembly and Release"/>
</dbReference>
<dbReference type="Reactome" id="R-HSA-9694548">
    <property type="pathway name" value="Maturation of spike protein"/>
</dbReference>
<dbReference type="Reactome" id="R-HSA-9694614">
    <property type="pathway name" value="Attachment and Entry"/>
</dbReference>
<dbReference type="Reactome" id="R-HSA-9694635">
    <property type="pathway name" value="Translation of Structural Proteins"/>
</dbReference>
<dbReference type="Reactome" id="R-HSA-9705671">
    <property type="pathway name" value="SARS-CoV-2 activates/modulates innate and adaptive immune responses"/>
</dbReference>
<dbReference type="Reactome" id="R-HSA-9733458">
    <property type="pathway name" value="Induction of Cell-Cell Fusion"/>
</dbReference>
<dbReference type="SABIO-RK" id="P0DTC2"/>
<dbReference type="SIGNOR" id="P0DTC2"/>
<dbReference type="PRO" id="PR:P0DTC2"/>
<dbReference type="Proteomes" id="UP000464024">
    <property type="component" value="Genome"/>
</dbReference>
<dbReference type="GO" id="GO:0044173">
    <property type="term" value="C:host cell endoplasmic reticulum-Golgi intermediate compartment membrane"/>
    <property type="evidence" value="ECO:0007669"/>
    <property type="project" value="UniProtKB-SubCell"/>
</dbReference>
<dbReference type="GO" id="GO:0020002">
    <property type="term" value="C:host cell plasma membrane"/>
    <property type="evidence" value="ECO:0007669"/>
    <property type="project" value="UniProtKB-SubCell"/>
</dbReference>
<dbReference type="GO" id="GO:0044228">
    <property type="term" value="C:host cell surface"/>
    <property type="evidence" value="ECO:0000314"/>
    <property type="project" value="UniProt"/>
</dbReference>
<dbReference type="GO" id="GO:0043655">
    <property type="term" value="C:host extracellular space"/>
    <property type="evidence" value="ECO:0000305"/>
    <property type="project" value="UniProt"/>
</dbReference>
<dbReference type="GO" id="GO:0016020">
    <property type="term" value="C:membrane"/>
    <property type="evidence" value="ECO:0000314"/>
    <property type="project" value="ComplexPortal"/>
</dbReference>
<dbReference type="GO" id="GO:0005886">
    <property type="term" value="C:plasma membrane"/>
    <property type="evidence" value="ECO:0000304"/>
    <property type="project" value="Reactome"/>
</dbReference>
<dbReference type="GO" id="GO:0019031">
    <property type="term" value="C:viral envelope"/>
    <property type="evidence" value="ECO:0000303"/>
    <property type="project" value="ComplexPortal"/>
</dbReference>
<dbReference type="GO" id="GO:0055036">
    <property type="term" value="C:virion membrane"/>
    <property type="evidence" value="ECO:0000304"/>
    <property type="project" value="Reactome"/>
</dbReference>
<dbReference type="GO" id="GO:0046789">
    <property type="term" value="F:host cell surface receptor binding"/>
    <property type="evidence" value="ECO:0000314"/>
    <property type="project" value="UniProt"/>
</dbReference>
<dbReference type="GO" id="GO:0042802">
    <property type="term" value="F:identical protein binding"/>
    <property type="evidence" value="ECO:0000353"/>
    <property type="project" value="IntAct"/>
</dbReference>
<dbReference type="GO" id="GO:0048018">
    <property type="term" value="F:receptor ligand activity"/>
    <property type="evidence" value="ECO:0000314"/>
    <property type="project" value="UniProt"/>
</dbReference>
<dbReference type="GO" id="GO:0039660">
    <property type="term" value="F:structural constituent of virion"/>
    <property type="evidence" value="ECO:0000314"/>
    <property type="project" value="UniProt"/>
</dbReference>
<dbReference type="GO" id="GO:0075509">
    <property type="term" value="P:endocytosis involved in viral entry into host cell"/>
    <property type="evidence" value="ECO:0007669"/>
    <property type="project" value="UniProtKB-UniRule"/>
</dbReference>
<dbReference type="GO" id="GO:0098670">
    <property type="term" value="P:entry receptor-mediated virion attachment to host cell"/>
    <property type="evidence" value="ECO:0000314"/>
    <property type="project" value="UniProt"/>
</dbReference>
<dbReference type="GO" id="GO:0039654">
    <property type="term" value="P:fusion of virus membrane with host endosome membrane"/>
    <property type="evidence" value="ECO:0007669"/>
    <property type="project" value="UniProtKB-UniRule"/>
</dbReference>
<dbReference type="GO" id="GO:0019064">
    <property type="term" value="P:fusion of virus membrane with host plasma membrane"/>
    <property type="evidence" value="ECO:0007669"/>
    <property type="project" value="UniProtKB-UniRule"/>
</dbReference>
<dbReference type="GO" id="GO:0061025">
    <property type="term" value="P:membrane fusion"/>
    <property type="evidence" value="ECO:0000314"/>
    <property type="project" value="ComplexPortal"/>
</dbReference>
<dbReference type="GO" id="GO:0046598">
    <property type="term" value="P:positive regulation of viral entry into host cell"/>
    <property type="evidence" value="ECO:0000314"/>
    <property type="project" value="DisProt"/>
</dbReference>
<dbReference type="GO" id="GO:0046813">
    <property type="term" value="P:receptor-mediated virion attachment to host cell"/>
    <property type="evidence" value="ECO:0000303"/>
    <property type="project" value="ComplexPortal"/>
</dbReference>
<dbReference type="GO" id="GO:0046718">
    <property type="term" value="P:symbiont entry into host cell"/>
    <property type="evidence" value="ECO:0000314"/>
    <property type="project" value="UniProt"/>
</dbReference>
<dbReference type="GO" id="GO:0141146">
    <property type="term" value="P:symbiont-mediated disruption of host tissue"/>
    <property type="evidence" value="ECO:0000269"/>
    <property type="project" value="SigSci"/>
</dbReference>
<dbReference type="GO" id="GO:0052170">
    <property type="term" value="P:symbiont-mediated suppression of host innate immune response"/>
    <property type="evidence" value="ECO:0007669"/>
    <property type="project" value="UniProtKB-KW"/>
</dbReference>
<dbReference type="GO" id="GO:0039587">
    <property type="term" value="P:symbiont-mediated-mediated suppression of host tetherin activity"/>
    <property type="evidence" value="ECO:0007669"/>
    <property type="project" value="UniProtKB-KW"/>
</dbReference>
<dbReference type="GO" id="GO:0019081">
    <property type="term" value="P:viral translation"/>
    <property type="evidence" value="ECO:0000304"/>
    <property type="project" value="UniProt"/>
</dbReference>
<dbReference type="GO" id="GO:0019062">
    <property type="term" value="P:virion attachment to host cell"/>
    <property type="evidence" value="ECO:0000314"/>
    <property type="project" value="UniProt"/>
</dbReference>
<dbReference type="CDD" id="cd21480">
    <property type="entry name" value="SARS-CoV-2_Spike_S1_RBD"/>
    <property type="match status" value="1"/>
</dbReference>
<dbReference type="CDD" id="cd21624">
    <property type="entry name" value="SARS-CoV-like_Spike_S1_NTD"/>
    <property type="match status" value="1"/>
</dbReference>
<dbReference type="CDD" id="cd22378">
    <property type="entry name" value="SARS-CoV-like_Spike_SD1-2_S1-S2_S2"/>
    <property type="match status" value="1"/>
</dbReference>
<dbReference type="DisProt" id="DP02772"/>
<dbReference type="FunFam" id="1.20.5.300:FF:000003">
    <property type="entry name" value="Spike glycoprotein"/>
    <property type="match status" value="1"/>
</dbReference>
<dbReference type="Gene3D" id="1.20.5.300">
    <property type="match status" value="1"/>
</dbReference>
<dbReference type="Gene3D" id="3.30.70.1840">
    <property type="match status" value="2"/>
</dbReference>
<dbReference type="Gene3D" id="1.20.5.790">
    <property type="entry name" value="Single helix bin"/>
    <property type="match status" value="1"/>
</dbReference>
<dbReference type="Gene3D" id="2.60.120.960">
    <property type="entry name" value="Spike glycoprotein, N-terminal domain"/>
    <property type="match status" value="1"/>
</dbReference>
<dbReference type="HAMAP" id="MF_04099">
    <property type="entry name" value="BETA_CORONA_SPIKE"/>
    <property type="match status" value="1"/>
</dbReference>
<dbReference type="InterPro" id="IPR032500">
    <property type="entry name" value="bCoV_S1_N"/>
</dbReference>
<dbReference type="InterPro" id="IPR042578">
    <property type="entry name" value="BETA_CORONA_SPIKE"/>
</dbReference>
<dbReference type="InterPro" id="IPR043607">
    <property type="entry name" value="CoV_S1_C"/>
</dbReference>
<dbReference type="InterPro" id="IPR043473">
    <property type="entry name" value="S2_sf_CoV"/>
</dbReference>
<dbReference type="InterPro" id="IPR043002">
    <property type="entry name" value="Spike_N_sf"/>
</dbReference>
<dbReference type="InterPro" id="IPR044341">
    <property type="entry name" value="Spike_S1_N_SARS-CoV-like"/>
</dbReference>
<dbReference type="InterPro" id="IPR018548">
    <property type="entry name" value="Spike_S1_RBD_bCoV"/>
</dbReference>
<dbReference type="InterPro" id="IPR044366">
    <property type="entry name" value="Spike_S1_RBD_SARS-CoV-2"/>
</dbReference>
<dbReference type="InterPro" id="IPR036326">
    <property type="entry name" value="Spike_S1_RBD_sf_bCoV"/>
</dbReference>
<dbReference type="InterPro" id="IPR002552">
    <property type="entry name" value="Spike_S2_CoV"/>
</dbReference>
<dbReference type="InterPro" id="IPR044873">
    <property type="entry name" value="Spike_S2_CoV_HR1"/>
</dbReference>
<dbReference type="InterPro" id="IPR044874">
    <property type="entry name" value="Spike_S2_CoV_HR2"/>
</dbReference>
<dbReference type="Pfam" id="PF16451">
    <property type="entry name" value="bCoV_S1_N"/>
    <property type="match status" value="1"/>
</dbReference>
<dbReference type="Pfam" id="PF09408">
    <property type="entry name" value="bCoV_S1_RBD"/>
    <property type="match status" value="1"/>
</dbReference>
<dbReference type="Pfam" id="PF19209">
    <property type="entry name" value="CoV_S1_C"/>
    <property type="match status" value="1"/>
</dbReference>
<dbReference type="Pfam" id="PF01601">
    <property type="entry name" value="CoV_S2"/>
    <property type="match status" value="1"/>
</dbReference>
<dbReference type="SUPFAM" id="SSF111474">
    <property type="entry name" value="Coronavirus S2 glycoprotein"/>
    <property type="match status" value="2"/>
</dbReference>
<dbReference type="SUPFAM" id="SSF143587">
    <property type="entry name" value="SARS receptor-binding domain-like"/>
    <property type="match status" value="1"/>
</dbReference>
<dbReference type="PROSITE" id="PS51921">
    <property type="entry name" value="BCOV_S1_CTD"/>
    <property type="match status" value="1"/>
</dbReference>
<dbReference type="PROSITE" id="PS51922">
    <property type="entry name" value="BCOV_S1_NTD"/>
    <property type="match status" value="1"/>
</dbReference>
<dbReference type="PROSITE" id="PS51923">
    <property type="entry name" value="COV_S2_HR1"/>
    <property type="match status" value="1"/>
</dbReference>
<dbReference type="PROSITE" id="PS51924">
    <property type="entry name" value="COV_S2_HR2"/>
    <property type="match status" value="1"/>
</dbReference>
<organismHost>
    <name type="scientific">Homo sapiens</name>
    <name type="common">Human</name>
    <dbReference type="NCBI Taxonomy" id="9606"/>
</organismHost>
<accession>P0DTC2</accession>
<protein>
    <recommendedName>
        <fullName evidence="2">Spike glycoprotein</fullName>
        <shortName evidence="2">S glycoprotein</shortName>
    </recommendedName>
    <alternativeName>
        <fullName evidence="2">E2</fullName>
    </alternativeName>
    <alternativeName>
        <fullName evidence="2">Peplomer protein</fullName>
    </alternativeName>
    <component>
        <recommendedName>
            <fullName evidence="2">Spike protein S1</fullName>
        </recommendedName>
    </component>
    <component>
        <recommendedName>
            <fullName evidence="2">Spike protein S2</fullName>
        </recommendedName>
    </component>
    <component>
        <recommendedName>
            <fullName evidence="2">Spike protein S2'</fullName>
        </recommendedName>
    </component>
</protein>
<feature type="signal peptide" evidence="37">
    <location>
        <begin position="1"/>
        <end position="13"/>
    </location>
</feature>
<feature type="chain" id="PRO_0000449646" description="Spike glycoprotein">
    <location>
        <begin position="14"/>
        <end position="1273"/>
    </location>
</feature>
<feature type="chain" id="PRO_0000449647" description="Spike protein S1" evidence="2">
    <location>
        <begin position="14"/>
        <end position="685"/>
    </location>
</feature>
<feature type="chain" id="PRO_0000449648" description="Spike protein S2" evidence="2">
    <location>
        <begin position="686"/>
        <end position="1273"/>
    </location>
</feature>
<feature type="chain" id="PRO_0000449649" description="Spike protein S2'" evidence="2">
    <location>
        <begin position="816"/>
        <end position="1273"/>
    </location>
</feature>
<feature type="topological domain" description="Extracellular" evidence="2">
    <location>
        <begin position="14"/>
        <end position="1213"/>
    </location>
</feature>
<feature type="transmembrane region" description="Helical" evidence="2">
    <location>
        <begin position="1214"/>
        <end position="1234"/>
    </location>
</feature>
<feature type="topological domain" description="Cytoplasmic" evidence="2">
    <location>
        <begin position="1235"/>
        <end position="1273"/>
    </location>
</feature>
<feature type="domain" description="BetaCoV S1-NTD" evidence="4">
    <location>
        <begin position="14"/>
        <end position="303"/>
    </location>
</feature>
<feature type="domain" description="BetaCoV S1-CTD" evidence="3 6">
    <location>
        <begin position="334"/>
        <end position="527"/>
    </location>
</feature>
<feature type="region of interest" description="Disordered" evidence="63">
    <location>
        <begin position="1"/>
        <end position="26"/>
    </location>
</feature>
<feature type="region of interest" description="Disordered" evidence="63">
    <location>
        <begin position="67"/>
        <end position="80"/>
    </location>
</feature>
<feature type="region of interest" description="Disordered" evidence="63">
    <location>
        <begin position="142"/>
        <end position="164"/>
    </location>
</feature>
<feature type="region of interest" description="Disordered" evidence="63">
    <location>
        <begin position="173"/>
        <end position="185"/>
    </location>
</feature>
<feature type="region of interest" description="Disordered" evidence="63">
    <location>
        <begin position="246"/>
        <end position="262"/>
    </location>
</feature>
<feature type="region of interest" description="Putative superantigen; may bind T-cell receptor alpha/TRAC" evidence="49">
    <location>
        <begin position="280"/>
        <end position="301"/>
    </location>
</feature>
<feature type="region of interest" description="Receptor-binding domain (RBD)" evidence="6">
    <location>
        <begin position="319"/>
        <end position="541"/>
    </location>
</feature>
<feature type="region of interest" description="Disordered" evidence="63">
    <location>
        <begin position="319"/>
        <end position="335"/>
    </location>
</feature>
<feature type="region of interest" description="Integrin-binding motif;" evidence="25">
    <location>
        <begin position="403"/>
        <end position="405"/>
    </location>
</feature>
<feature type="region of interest" description="Receptor-binding motif; binding to human ACE2" evidence="1">
    <location>
        <begin position="437"/>
        <end position="508"/>
    </location>
</feature>
<feature type="region of interest" description="Immunodominant HLA epitope recognized by the CD8+; called NF9 peptide" evidence="36">
    <location>
        <begin position="448"/>
        <end position="456"/>
    </location>
</feature>
<feature type="region of interest" description="Disordered" evidence="63">
    <location>
        <begin position="455"/>
        <end position="490"/>
    </location>
</feature>
<feature type="region of interest" description="Disordered" evidence="63">
    <location>
        <begin position="519"/>
        <end position="541"/>
    </location>
</feature>
<feature type="region of interest" description="Disordered" evidence="63">
    <location>
        <begin position="621"/>
        <end position="640"/>
    </location>
</feature>
<feature type="region of interest" description="Disordered" evidence="63">
    <location>
        <begin position="673"/>
        <end position="687"/>
    </location>
</feature>
<feature type="region of interest" description="Putative superantigen; may bind T-cell receptor beta/TRBC1" evidence="49">
    <location>
        <begin position="681"/>
        <end position="684"/>
    </location>
</feature>
<feature type="region of interest" description="Fusion peptide 1" evidence="2">
    <location>
        <begin position="816"/>
        <end position="837"/>
    </location>
</feature>
<feature type="region of interest" description="Disordered" evidence="63">
    <location>
        <begin position="828"/>
        <end position="853"/>
    </location>
</feature>
<feature type="region of interest" description="Fusion peptide 2" evidence="2">
    <location>
        <begin position="835"/>
        <end position="855"/>
    </location>
</feature>
<feature type="region of interest" description="Heptad repeat 1" evidence="2">
    <location>
        <begin position="920"/>
        <end position="970"/>
    </location>
</feature>
<feature type="region of interest" description="Heptad repeat 2" evidence="2">
    <location>
        <begin position="1163"/>
        <end position="1202"/>
    </location>
</feature>
<feature type="coiled-coil region" evidence="2">
    <location>
        <begin position="949"/>
        <end position="993"/>
    </location>
</feature>
<feature type="coiled-coil region" evidence="2">
    <location>
        <begin position="1176"/>
        <end position="1203"/>
    </location>
</feature>
<feature type="short sequence motif" description="Binding to host endocytosis trafficking protein SNX27" evidence="39">
    <location>
        <begin position="1237"/>
        <end position="1241"/>
    </location>
</feature>
<feature type="short sequence motif" description="Diacidic ER export motif (host COPII)" evidence="39">
    <location>
        <begin position="1257"/>
        <end position="1262"/>
    </location>
</feature>
<feature type="short sequence motif" description="Binding to host plasma membrane localising/FERM domain proteins" evidence="39">
    <location>
        <begin position="1261"/>
        <end position="1267"/>
    </location>
</feature>
<feature type="short sequence motif" description="KxHxx, ER retrieval signal (COPI)" evidence="2 39">
    <location>
        <begin position="1269"/>
        <end position="1273"/>
    </location>
</feature>
<feature type="site" description="Cleavage; by host furin" evidence="2 7 13 17 34">
    <location>
        <begin position="685"/>
        <end position="686"/>
    </location>
</feature>
<feature type="site" description="Cleavage; by host TMPRSS2 or CTSL" evidence="2 17 34">
    <location>
        <begin position="815"/>
        <end position="816"/>
    </location>
</feature>
<feature type="lipid moiety-binding region" description="S-palmitoyl cysteine; by host ZDHHC20" evidence="40">
    <location>
        <position position="1235"/>
    </location>
</feature>
<feature type="lipid moiety-binding region" description="S-palmitoyl cysteine; by host ZDHHC20" evidence="40">
    <location>
        <position position="1236"/>
    </location>
</feature>
<feature type="lipid moiety-binding region" description="S-palmitoyl cysteine; by host ZDHHC20" evidence="40">
    <location>
        <position position="1240"/>
    </location>
</feature>
<feature type="lipid moiety-binding region" description="S-palmitoyl cysteine; by host ZDHHC20" evidence="40">
    <location>
        <position position="1241"/>
    </location>
</feature>
<feature type="lipid moiety-binding region" description="S-palmitoyl cysteine; by host ZDHHC20" evidence="40">
    <location>
        <position position="1243"/>
    </location>
</feature>
<feature type="lipid moiety-binding region" description="S-palmitoyl cysteine; by host ZDHHC20; partial" evidence="40">
    <location>
        <position position="1247"/>
    </location>
</feature>
<feature type="lipid moiety-binding region" description="S-palmitoyl cysteine; by host ZDHHC20; partial" evidence="40">
    <location>
        <position position="1248"/>
    </location>
</feature>
<feature type="lipid moiety-binding region" description="S-palmitoyl cysteine; by host ZDHHC20; partial" evidence="40">
    <location>
        <position position="1250"/>
    </location>
</feature>
<feature type="lipid moiety-binding region" description="S-palmitoyl cysteine; by host ZDHHC20; partial" evidence="40">
    <location>
        <position position="1253"/>
    </location>
</feature>
<feature type="lipid moiety-binding region" description="S-palmitoyl cysteine; by host ZDHHC20; partial" evidence="40">
    <location>
        <position position="1254"/>
    </location>
</feature>
<feature type="glycosylation site" description="N-linked (GlcNAc...) (complex) asparagine; by host" evidence="2 15 22">
    <location>
        <position position="17"/>
    </location>
</feature>
<feature type="glycosylation site" description="N-linked (GlcNAc...) (hybrid) asparagine; by host" evidence="2 8 14 15 22">
    <location>
        <position position="61"/>
    </location>
</feature>
<feature type="glycosylation site" description="N-linked (GlcNAc...) (complex) asparagine; by host" evidence="2 14 15 22">
    <location>
        <position position="74"/>
    </location>
</feature>
<feature type="glycosylation site" description="N-linked (GlcNAc...) (hybrid) asparagine; by host" evidence="2 8 14 15 22">
    <location>
        <position position="122"/>
    </location>
</feature>
<feature type="glycosylation site" description="N-linked (GlcNAc...) (complex) asparagine; by host" evidence="2 14 15 22">
    <location>
        <position position="149"/>
    </location>
</feature>
<feature type="glycosylation site" description="N-linked (GlcNAc...) (complex) asparagine; by host" evidence="2 8 14 15 22">
    <location>
        <position position="165"/>
    </location>
</feature>
<feature type="glycosylation site" description="N-linked (GlcNAc...) (high mannose) asparagine; by host" evidence="2 8 14 15 22">
    <location>
        <position position="234"/>
    </location>
</feature>
<feature type="glycosylation site" description="N-linked (GlcNAc...) (complex) asparagine; by host" evidence="2 8 14 15 22">
    <location>
        <position position="282"/>
    </location>
</feature>
<feature type="glycosylation site" description="O-linked (GalNAc) threonine; by host" evidence="14">
    <location>
        <position position="323"/>
    </location>
</feature>
<feature type="glycosylation site" description="O-linked (HexNAc...) serine; by host" evidence="14">
    <location>
        <position position="325"/>
    </location>
</feature>
<feature type="glycosylation site" description="N-linked (GlcNAc...) (complex) asparagine; by host" evidence="2 8 14 15 22">
    <location>
        <position position="331"/>
    </location>
</feature>
<feature type="glycosylation site" description="N-linked (GlcNAc...) (complex) asparagine; by host" evidence="2 8 14 15 22">
    <location>
        <position position="343"/>
    </location>
</feature>
<feature type="glycosylation site" description="N-linked (GlcNAc...) (hybrid) asparagine; by host" evidence="2 8 15 22">
    <location>
        <position position="603"/>
    </location>
</feature>
<feature type="glycosylation site" description="N-linked (GlcNAc...) (complex) asparagine; by host" evidence="2 8 14 15 22">
    <location>
        <position position="616"/>
    </location>
</feature>
<feature type="glycosylation site" description="N-linked (GlcNAc...) (complex) asparagine; by host" evidence="2 8 14 15 22">
    <location>
        <position position="657"/>
    </location>
</feature>
<feature type="glycosylation site" description="O-linked (GlcNAc...) threonine; by host GALNT1" evidence="41">
    <location>
        <position position="676"/>
    </location>
</feature>
<feature type="glycosylation site" description="O-linked (GlcNAc...) threonine; by host GALNT1" evidence="41">
    <location>
        <position position="678"/>
    </location>
</feature>
<feature type="glycosylation site" description="N-linked (GlcNAc...) (high mannose) asparagine; by host" evidence="2 8 14 15 22">
    <location>
        <position position="709"/>
    </location>
</feature>
<feature type="glycosylation site" description="N-linked (GlcNAc...) (hybrid) asparagine; by host" evidence="2 8 14 15 22">
    <location>
        <position position="717"/>
    </location>
</feature>
<feature type="glycosylation site" description="N-linked (GlcNAc...) (hybrid) asparagine; by host" evidence="2 8 14 15 22">
    <location>
        <position position="801"/>
    </location>
</feature>
<feature type="glycosylation site" description="N-linked (GlcNAc...) (hybrid) asparagine; by host" evidence="2 8 14 15 22">
    <location>
        <position position="1074"/>
    </location>
</feature>
<feature type="glycosylation site" description="N-linked (GlcNAc...) (complex) asparagine; by host" evidence="2 8 14 15 22">
    <location>
        <position position="1098"/>
    </location>
</feature>
<feature type="glycosylation site" description="N-linked (GlcNAc...) (complex) asparagine; by host" evidence="2 8 15 22">
    <location>
        <position position="1134"/>
    </location>
</feature>
<feature type="glycosylation site" description="N-linked (GlcNAc...) (complex) asparagine; by host" evidence="2 15 22">
    <location>
        <position position="1158"/>
    </location>
</feature>
<feature type="glycosylation site" description="N-linked (GlcNAc...) (complex) asparagine; by host" evidence="2 15 22">
    <location>
        <position position="1173"/>
    </location>
</feature>
<feature type="glycosylation site" description="N-linked (GlcNAc...) (complex) asparagine; by host" evidence="2 14 15 22">
    <location>
        <position position="1194"/>
    </location>
</feature>
<feature type="disulfide bond" evidence="4">
    <location>
        <begin position="15"/>
        <end position="136"/>
    </location>
</feature>
<feature type="disulfide bond" evidence="4 8 66">
    <location>
        <begin position="131"/>
        <end position="166"/>
    </location>
</feature>
<feature type="disulfide bond" evidence="4 8 66">
    <location>
        <begin position="291"/>
        <end position="301"/>
    </location>
</feature>
<feature type="disulfide bond" evidence="3 8 12">
    <location>
        <begin position="336"/>
        <end position="361"/>
    </location>
</feature>
<feature type="disulfide bond" evidence="3 8 12">
    <location>
        <begin position="379"/>
        <end position="432"/>
    </location>
</feature>
<feature type="disulfide bond" evidence="3 8 10 11 12 66">
    <location>
        <begin position="391"/>
        <end position="525"/>
    </location>
</feature>
<feature type="disulfide bond" evidence="12">
    <location>
        <begin position="480"/>
        <end position="488"/>
    </location>
</feature>
<feature type="disulfide bond" evidence="8 66">
    <location>
        <begin position="538"/>
        <end position="590"/>
    </location>
</feature>
<feature type="disulfide bond" evidence="8 66">
    <location>
        <begin position="617"/>
        <end position="649"/>
    </location>
</feature>
<feature type="disulfide bond" evidence="8 66">
    <location>
        <begin position="662"/>
        <end position="671"/>
    </location>
</feature>
<feature type="disulfide bond" evidence="8 66">
    <location>
        <begin position="738"/>
        <end position="760"/>
    </location>
</feature>
<feature type="disulfide bond" evidence="8 66">
    <location>
        <begin position="743"/>
        <end position="749"/>
    </location>
</feature>
<feature type="disulfide bond" evidence="2">
    <location>
        <begin position="840"/>
        <end position="851"/>
    </location>
</feature>
<feature type="disulfide bond" evidence="8 66">
    <location>
        <begin position="1032"/>
        <end position="1043"/>
    </location>
</feature>
<feature type="disulfide bond" evidence="8 66">
    <location>
        <begin position="1082"/>
        <end position="1126"/>
    </location>
</feature>
<feature type="sequence variant" description="In strain: Iota/B.1.526." evidence="51">
    <original>L</original>
    <variation>F</variation>
    <location>
        <position position="5"/>
    </location>
</feature>
<feature type="sequence variant" description="In strain: Epsilon/B.1.427/B.1.429; may change signal peptide cleavage to position 16-17." evidence="37 51">
    <original>S</original>
    <variation>I</variation>
    <location>
        <position position="13"/>
    </location>
</feature>
<feature type="sequence variant" description="In strain: Beta/B.1.351, Gamma/P.1, 19B/501Y." evidence="51 59">
    <original>L</original>
    <variation>F</variation>
    <location>
        <position position="18"/>
    </location>
</feature>
<feature type="sequence variant" description="In strain: Omicron/BQ.1.1, Omicron/XBB.1.5, Omicron/EG.5.1." evidence="51">
    <original>T</original>
    <variation>I</variation>
    <location>
        <position position="19"/>
    </location>
</feature>
<feature type="sequence variant" description="In strain: Delta/B.1.617.2, Omicron/BA.2, Omicron/BA.2.12.1, Omicron/BA.2.75, Omicron/BA.4, Omicron/BA.5." evidence="51">
    <original>T</original>
    <variation>R</variation>
    <location>
        <position position="19"/>
    </location>
</feature>
<feature type="sequence variant" description="In strain: Gamma/P.1." evidence="51">
    <original>T</original>
    <variation>N</variation>
    <location>
        <position position="20"/>
    </location>
</feature>
<feature type="sequence variant" description="In strain: Omicron/BA.2, Omicron/BA.2.12.1, Omicron/BA.2.75, Omicron/BA.4, Omicron/BA.5, Omicron/BQ.1.1, Omicron/XBB.1.5, Omicron/EG.5.1." evidence="51">
    <original>LPPA</original>
    <variation>S</variation>
    <location>
        <begin position="24"/>
        <end position="27"/>
    </location>
</feature>
<feature type="sequence variant" description="In strain: Gamma/P.1." evidence="51">
    <original>P</original>
    <variation>S</variation>
    <location>
        <position position="26"/>
    </location>
</feature>
<feature type="sequence variant" description="In strain: Omicron/EG.5.1." evidence="51">
    <original>Q</original>
    <variation>H</variation>
    <location>
        <position position="52"/>
    </location>
</feature>
<feature type="sequence variant" description="In strain: Eta/B.1.525, Omicron/BA.1." evidence="51">
    <original>A</original>
    <variation>V</variation>
    <location>
        <position position="67"/>
    </location>
</feature>
<feature type="sequence variant" description="In strain: Alpha/B.1.1.7, Eta/B.1.525, 19B/501T, Omicron/BA.1, Omicron/BA.4, Omicron/BA.5, Omicron/BQ.1.1; May compensate for reduced infectivity of RBD escape mutants." evidence="35 57">
    <location>
        <begin position="69"/>
        <end position="70"/>
    </location>
</feature>
<feature type="sequence variant" description="In strain: Lambda/C.37." evidence="51">
    <original>G</original>
    <variation>V</variation>
    <location>
        <position position="75"/>
    </location>
</feature>
<feature type="sequence variant" description="In strain: Lambda/C.37." evidence="51">
    <original>T</original>
    <variation>I</variation>
    <location>
        <position position="76"/>
    </location>
</feature>
<feature type="sequence variant" description="In strain: Beta/B.1.351." evidence="59">
    <original>D</original>
    <variation>A</variation>
    <location>
        <position position="80"/>
    </location>
</feature>
<feature type="sequence variant" description="In strain: Omicron/XBB.1.5, Omicron/EG.5.1." evidence="51">
    <original>V</original>
    <variation>A</variation>
    <location>
        <position position="83"/>
    </location>
</feature>
<feature type="sequence variant" description="In strain: Iota/B.1.526, Mu/B.1.621, B.1.1.318, Omicron/BA.1." evidence="51">
    <original>T</original>
    <variation>I</variation>
    <location>
        <position position="95"/>
    </location>
</feature>
<feature type="sequence variant" description="In strain: A23.1." evidence="51">
    <original>R</original>
    <variation>I</variation>
    <location>
        <position position="102"/>
    </location>
</feature>
<feature type="sequence variant" description="In strain: Gamma/P.1." evidence="51">
    <original>D</original>
    <variation>Y</variation>
    <location>
        <position position="138"/>
    </location>
</feature>
<feature type="sequence variant" description="In strain: Omicron/BA.1." evidence="51">
    <original>GVYY</original>
    <variation>D</variation>
    <location>
        <begin position="142"/>
        <end position="145"/>
    </location>
</feature>
<feature type="sequence variant" description="In strain: Kappa/B.1.617.1, Omicron/BA.2, Omicron/BA.2.12.1, Omicron/BA.2.75, Omicron/BA.4, Omicron/BA.5, Omicron/BQ.1.1, Omicron/XBB.1.5, Omicron/EG.5.1." evidence="51">
    <original>G</original>
    <variation>D</variation>
    <location>
        <position position="142"/>
    </location>
</feature>
<feature type="sequence variant" description="In strain: Alpha/B.1.1.7, Eta/B.1.525, B.1.1.318, Omicron/XBB.1.5, Omicron/EG.5.1." evidence="51 57">
    <location>
        <position position="144"/>
    </location>
</feature>
<feature type="sequence variant" description="In strain: Omicron/XBB.1.5, Omicron/EG.5.1." evidence="51">
    <original>H</original>
    <variation>Q</variation>
    <location>
        <position position="146"/>
    </location>
</feature>
<feature type="sequence variant" description="In strain: Omicron/BA.2.75." evidence="51">
    <original>K</original>
    <variation>E</variation>
    <location>
        <position position="147"/>
    </location>
</feature>
<feature type="sequence variant" description="In strain: Epsilon/B.1.427/B.1.429; when coupled with S13I induces resistance to NTD antibodies by changing disulfid bond in positions 15-136 to 136-152." evidence="37 51">
    <original>W</original>
    <variation>C</variation>
    <location>
        <position position="152"/>
    </location>
</feature>
<feature type="sequence variant" description="In strain: Omicron/BA.2.75." evidence="51">
    <original>W</original>
    <variation>R</variation>
    <location>
        <position position="152"/>
    </location>
</feature>
<feature type="sequence variant" description="In strain: Kappa/B.1.617.1." evidence="51">
    <original>E</original>
    <variation>K</variation>
    <location>
        <position position="154"/>
    </location>
</feature>
<feature type="sequence variant" description="In strain: Delta/B.1.617.2.">
    <original>EFR</original>
    <variation>G</variation>
    <location>
        <begin position="156"/>
        <end position="158"/>
    </location>
</feature>
<feature type="sequence variant" description="In strain: A23.1, Omicron/BA.2.75." evidence="51">
    <original>F</original>
    <variation>L</variation>
    <location>
        <position position="157"/>
    </location>
</feature>
<feature type="sequence variant" description="In strain: Omicron/XBB.1.5, Omicron/EG.5.1." evidence="51">
    <original>Q</original>
    <variation>E</variation>
    <location>
        <position position="183"/>
    </location>
</feature>
<feature type="sequence variant" description="In strain: Gamma/P.1." evidence="51">
    <original>R</original>
    <variation>S</variation>
    <location>
        <position position="190"/>
    </location>
</feature>
<feature type="sequence variant" description="In strain: Omicron/BA.2.75." evidence="51">
    <original>I</original>
    <variation>V</variation>
    <location>
        <position position="210"/>
    </location>
</feature>
<feature type="sequence variant" description="In strain: Omicron/BA.1." evidence="51">
    <original>NL</original>
    <variation>I</variation>
    <location>
        <begin position="211"/>
        <end position="212"/>
    </location>
</feature>
<feature type="sequence variant" description="In strain: Omicron/XBB.1.5, Omicron/EG.5.1." evidence="51">
    <original>V</original>
    <variation>E</variation>
    <location>
        <position position="213"/>
    </location>
</feature>
<feature type="sequence variant" description="In strain: Omicron/BA.2, Omicron/BA.2.12.1, Omicron/BA.2.75, Omicron/BA.4, Omicron/BA.5, Omicron/BQ.1.1." evidence="51">
    <original>V</original>
    <variation>G</variation>
    <location>
        <position position="213"/>
    </location>
</feature>
<feature type="sequence variant" description="In strain: Omicron/BA.1." evidence="51">
    <original>R</original>
    <variation>REPE</variation>
    <location>
        <position position="214"/>
    </location>
</feature>
<feature type="sequence variant" description="In strain: Beta/B.1.351." evidence="59">
    <original>D</original>
    <variation>G</variation>
    <location>
        <position position="215"/>
    </location>
</feature>
<feature type="sequence variant" description="In strain: 20A.EU1." evidence="51">
    <original>A</original>
    <variation>V</variation>
    <location>
        <position position="222"/>
    </location>
</feature>
<feature type="sequence variant" description="In strain: Lambda/C.37." evidence="51">
    <location>
        <begin position="246"/>
        <end position="252"/>
    </location>
</feature>
<feature type="sequence variant" description="In strain: Omicron/XBB.1.5, Omicron/EG.5.1." evidence="51">
    <original>G</original>
    <variation>V</variation>
    <location>
        <position position="252"/>
    </location>
</feature>
<feature type="sequence variant" description="In strain: Iota/B.1.526." evidence="51">
    <original>D</original>
    <variation>G</variation>
    <location>
        <position position="253"/>
    </location>
</feature>
<feature type="sequence variant" description="In strain: Lambda/C.37." evidence="51">
    <original>D</original>
    <variation>N</variation>
    <location>
        <position position="253"/>
    </location>
</feature>
<feature type="sequence variant" description="In strain: Omicron/BA.2.75." evidence="51">
    <original>G</original>
    <variation>S</variation>
    <location>
        <position position="257"/>
    </location>
</feature>
<feature type="sequence variant" description="In strain: Omicron/BA.1, Omicron/BA.2, Omicron/BA.2.12.1, Omicron/BA.4, Omicron/BA.5, Omicron/BQ.1.1." evidence="51">
    <original>G</original>
    <variation>D</variation>
    <location>
        <position position="339"/>
    </location>
</feature>
<feature type="sequence variant" description="In strain: Omicron/BA.2.75, Omicron/XBB.1.5, Omicron/EG.5.1." evidence="51">
    <original>G</original>
    <variation>H</variation>
    <location>
        <position position="339"/>
    </location>
</feature>
<feature type="sequence variant" description="In strain: Mu/B.1.621." evidence="51">
    <original>R</original>
    <variation>K</variation>
    <location>
        <position position="346"/>
    </location>
</feature>
<feature type="sequence variant" description="In strain: Omicron/BQ.1.1, Omicron/XBB.1.5, Omicron/EG.5.1.">
    <original>R</original>
    <variation>T</variation>
    <location>
        <position position="346"/>
    </location>
</feature>
<feature type="sequence variant" description="In strain: Omicron/XBB.1.5, Omicron/EG.5.1." evidence="51">
    <original>L</original>
    <variation>I</variation>
    <location>
        <position position="368"/>
    </location>
</feature>
<feature type="sequence variant" description="In strain: Omicron/BA.2, Omicron/BA.2.12.1, Omicron/BA.2.75, Omicron/BA.4, Omicron/BA.5, Omicron/BQ.1.1, Omicron/XBB.1.5, Omicron/EG.5.1." evidence="51">
    <original>S</original>
    <variation>F</variation>
    <location>
        <position position="371"/>
    </location>
</feature>
<feature type="sequence variant" description="In strain: Omicron/BA.1." evidence="51">
    <original>S</original>
    <variation>L</variation>
    <location>
        <position position="371"/>
    </location>
</feature>
<feature type="sequence variant" description="In strain: Omicron/BA.1, Omicron/BA.2, Omicron/BA.2.12.1, Omicron/BA.2.75, Omicron/BA.4, Omicron/BA.5, Omicron/BQ.1.1, Omicron/XBB.1.5, Omicron/EG.5.1." evidence="51">
    <original>S</original>
    <variation>P</variation>
    <location>
        <position position="373"/>
    </location>
</feature>
<feature type="sequence variant" description="In strain: Omicron/BA.1, Omicron/BA.2, Omicron/BA.2.12.1, Omicron/BA.2.75, Omicron/BA.4, Omicron/BA.5, Omicron/BQ.1.1, Omicron/XBB.1.5, Omicron/EG.5.1." evidence="51">
    <original>S</original>
    <variation>F</variation>
    <location>
        <position position="375"/>
    </location>
</feature>
<feature type="sequence variant" description="In strain: Omicron/BA.2, Omicron/BA.2.12.1, Omicron/BA.4, Omicron/BA.5, Omicron/BQ.1.1, Omicron/XBB.1.5, Omicron/EG.5.1." evidence="51">
    <original>T</original>
    <variation>A</variation>
    <location>
        <position position="376"/>
    </location>
</feature>
<feature type="sequence variant" description="In strain: Omicron/BA.2, Omicron/BA.2.12.1, Omicron/BA.2.75, Omicron/BA.4, Omicron/BA.5, Omicron/BQ.1.1, Omicron/XBB.1.5, Omicron/EG.5.1; complete loss of interaction with host integrins." evidence="47 51">
    <original>D</original>
    <variation>N</variation>
    <location>
        <position position="405"/>
    </location>
</feature>
<feature type="sequence variant" description="In strain: Omicron/BA.2, Omicron/BA.2.12.1, Omicron/BA.2.75, Omicron/BA.4, Omicron/BA.5, Omicron/BQ.1.1, Omicron/XBB.1.5, Omicron/EG.5.1." evidence="51">
    <original>R</original>
    <variation>S</variation>
    <location>
        <position position="408"/>
    </location>
</feature>
<feature type="sequence variant" description="In strain: Beta/B.1.351, Omicron/BA.1, Omicron/BA.2, Omicron/BA.2.12.1, Omicron/BA.2.75, Omicron/BA.4, Omicron/BA.5, Omicron/BQ.1.1, Omicron/XBB.1.5, Omicron/EG.5.1; May enhance affinity to human ACE2 receptor." evidence="51 59">
    <original>K</original>
    <variation>N</variation>
    <location>
        <position position="417"/>
    </location>
</feature>
<feature type="sequence variant" description="In strain: Gamma/P.1." evidence="51">
    <original>K</original>
    <variation>T</variation>
    <location>
        <position position="417"/>
    </location>
</feature>
<feature type="sequence variant" description="In strain: Omicron/BA.1, Omicron/BA.2, Omicron/BA.2.12.1, Omicron/BA.2.75, Omicron/BA.4, Omicron/BA.5, Omicron/BQ.1.1, Omicron/XBB.1.5, Omicron/EG.5.1." evidence="51">
    <original>N</original>
    <variation>K</variation>
    <location>
        <position position="440"/>
    </location>
</feature>
<feature type="sequence variant" description="In strain: Omicron/BQ.1.1." evidence="51">
    <original>K</original>
    <variation>T</variation>
    <location>
        <position position="444"/>
    </location>
</feature>
<feature type="sequence variant" description="In strain: Omicron/XBB.1.5, Omicron/EG.5.1." evidence="51">
    <original>V</original>
    <variation>P</variation>
    <location>
        <position position="445"/>
    </location>
</feature>
<feature type="sequence variant" description="In strain: Omicron/BA.1, Omicron/BA.2.75, Omicron/XBB.1.5, Omicron/EG.5.1." evidence="51">
    <original>G</original>
    <variation>S</variation>
    <location>
        <position position="446"/>
    </location>
</feature>
<feature type="sequence variant" description="In strain: Omicron/BA.2.12.1." evidence="51">
    <original>L</original>
    <variation>Q</variation>
    <location>
        <position position="452"/>
    </location>
</feature>
<feature type="sequence variant" description="In strain: Delta/B.1.617.2, Epsilon/B.1.427/B.1.429, Kappa/B.1.617.1, Lambda/C.37, 19B/501Y, Omicron/BA.4, Omicron/BA.5, Omicron/BQ.1.1; Contributes to cellular immunity evasion and increases infectivity." evidence="36 51">
    <original>L</original>
    <variation>R</variation>
    <location>
        <position position="452"/>
    </location>
</feature>
<feature type="sequence variant" description="In strain: B.1.1.298." evidence="36">
    <original>Y</original>
    <variation>F</variation>
    <location>
        <position position="453"/>
    </location>
</feature>
<feature type="sequence variant" description="In strain: Omicron/EG.5.1." evidence="51">
    <original>F</original>
    <variation>L</variation>
    <location>
        <position position="456"/>
    </location>
</feature>
<feature type="sequence variant" description="In strain: Omicron/BA.2.75, Omicron/BQ.1.1, Omicron/XBB.1.5, Omicron/EG.5.1." evidence="51">
    <original>N</original>
    <variation>K</variation>
    <location>
        <position position="460"/>
    </location>
</feature>
<feature type="sequence variant" description="In strain: 20A.EU2, Iota/B.1.526, Omicron/BA.1, Omicron/BA.2, Omicron/BA.2.12.1, Omicron/BA.2.75, Omicron/BA.4, Omicron/BA.5, Omicron/BQ.1.1, Omicron/XBB.1.5, Omicron/EG.5.1." evidence="51">
    <original>S</original>
    <variation>N</variation>
    <location>
        <position position="477"/>
    </location>
</feature>
<feature type="sequence variant" description="In strain: Delta/B.1.617.2, Omicron/BA.1, Omicron/BA.2, Omicron/BA.2.12.1, Omicron/BA.2.75, Omicron/BA.4, Omicron/BA.5, Omicron/BQ.1.1, Omicron/XBB.1.5, Omicron/EG.5.1." evidence="51">
    <original>T</original>
    <variation>K</variation>
    <location>
        <position position="478"/>
    </location>
</feature>
<feature type="sequence variant" description="In strain: Omicron/BA.1, Omicron/BA.2, Omicron/BA.2.12.1, Omicron/BA.2.75, Omicron/BA.4, Omicron/BA.5, Omicron/BQ.1.1, Omicron/XBB.1.5, Omicron/EG.5.1." evidence="51">
    <original>E</original>
    <variation>A</variation>
    <location>
        <position position="484"/>
    </location>
</feature>
<feature type="sequence variant" description="In strain: Beta/B.1.351, Eta/B.1.525, Theta/P.3, Iota/B.1.526, B.1.1.318, Gamma/P.1, Zeta/P.2 and Mu/B.1.621; May enhance affinity to human ACE2 receptor." evidence="51 59">
    <original>E</original>
    <variation>K</variation>
    <location>
        <position position="484"/>
    </location>
</feature>
<feature type="sequence variant" description="In strain: Kappa/B.1.617.1." evidence="51">
    <original>E</original>
    <variation>Q</variation>
    <location>
        <position position="484"/>
    </location>
</feature>
<feature type="sequence variant" description="In strain: Omicron/XBB.1.5, Omicron/EG.5.1." evidence="51">
    <original>F</original>
    <variation>P</variation>
    <location>
        <position position="486"/>
    </location>
</feature>
<feature type="sequence variant" description="In strain: Omicron/BA.4, Omicron/BA.5, Omicron/BQ.1.1." evidence="51">
    <original>F</original>
    <variation>V</variation>
    <location>
        <position position="486"/>
    </location>
</feature>
<feature type="sequence variant" description="In strain: Lambda/C.37, Omicron/BQ.1.1, Omicron/XBB.1.5, Omicron/EG.5.1." evidence="51">
    <original>F</original>
    <variation>S</variation>
    <location>
        <position position="490"/>
    </location>
</feature>
<feature type="sequence variant" description="In strain: Omicron/BA.1, Omicron/BA.2, Omicron/BA.2.12.1." evidence="51">
    <original>Q</original>
    <variation>R</variation>
    <location>
        <position position="493"/>
    </location>
</feature>
<feature type="sequence variant" description="In strain: Omicron/BA.1." evidence="51">
    <original>G</original>
    <variation>S</variation>
    <location>
        <position position="496"/>
    </location>
</feature>
<feature type="sequence variant" description="In strain: Omicron/BA.1, Omicron/BA.2, Omicron/BA.2.12.1, Omicron/BA.2.75, Omicron/BA.4, Omicron/BA.5, Omicron/BQ.1.1, Omicron/XBB.1.5, Omicron/EG.5.1." evidence="51">
    <original>Q</original>
    <variation>R</variation>
    <location>
        <position position="498"/>
    </location>
</feature>
<feature type="sequence variant" description="In strain: 19B/501T." evidence="51">
    <original>N</original>
    <variation>T</variation>
    <location>
        <position position="501"/>
    </location>
</feature>
<feature type="sequence variant" description="In strain: Alpha/B.1.1.7, Beta/B.1.351, Gamma/P.1, Theta/P.3, Mu/B.1.621, 19B/501Y, Omicron/BA.1, Omicron/BA.2, Omicron/BA.2.12.1, Omicron/BA.2.75, Omicron/BA.4, Omicron/BA.5, Omicron/BQ.1.1, Omicron/XBB.1.5, Omicron/EG.5.1; May enhance affinity to human ACE2 receptor." evidence="19 51 57 59">
    <original>N</original>
    <variation>Y</variation>
    <location>
        <position position="501"/>
    </location>
</feature>
<feature type="sequence variant" description="In strain: Omicron/BA.1, Omicron/BA.2, Omicron/BA.2.12.1, Omicron/BA.2.75, Omicron/BA.4, Omicron/BA.5, Omicron/BQ.1.1, Omicron/XBB.1.5, Omicron/EG.5.1." evidence="51">
    <original>Y</original>
    <variation>H</variation>
    <location>
        <position position="505"/>
    </location>
</feature>
<feature type="sequence variant" description="In strain: Omicron/BA.1." evidence="51">
    <original>T</original>
    <variation>K</variation>
    <location>
        <position position="547"/>
    </location>
</feature>
<feature type="sequence variant" description="In strain: Alpha/B.1.1.7." evidence="57">
    <original>A</original>
    <variation>D</variation>
    <location>
        <position position="570"/>
    </location>
</feature>
<feature type="sequence variant" description="In strain: A23.1." evidence="51">
    <original>Q</original>
    <variation>H</variation>
    <location>
        <position position="613"/>
    </location>
</feature>
<feature type="sequence variant" description="In strain: Alpha/B.1.1.7, Beta/B.1.351, Gamma/P.1, Delta/B.1.617.2, Epsilon/B.1.427/B.1.429, Eta/B.1.525, Theta/P.3, Iota/B.1.526, Kappa/B.1.617.1, Lambda/C.37, B.1.1.318, Zeta/P.2, Mu/B.1.621, 20A.EU1, 20A.EU2, Omicron/BA.1, Omicron/BA.2, Omicron/BA.2.12.1, Omicron/BA.2.75, Omicron/BA.4, Omicron/BA.5, Omicron/BQ.1.1, Omicron/XBB.1.5, Omicron/EG.5.1; common variant; binds to hACE2 more efficiently; produces more infectious particles when cultured in primary human epithelial cells; does not significantly shift SARS-CoV-2 neutralization properties." evidence="29 51 52 53 54 55 56 57 58">
    <original>D</original>
    <variation>G</variation>
    <location>
        <position position="614"/>
    </location>
</feature>
<feature type="sequence variant" description="In strain: 19B/501Y." evidence="51">
    <original>A</original>
    <variation>V</variation>
    <location>
        <position position="653"/>
    </location>
</feature>
<feature type="sequence variant" description="In strain: Gamma/P.1, 19B/501T, 19B/501Y, Omicron/BA.1, Omicron/BA.2, Omicron/BA.2.12.1, Omicron/BA.2.75, Omicron/BA.4, Omicron/BA.5, Omicron/BQ.1.1, Omicron/XBB.1.5, Omicron/EG.5.1." evidence="51">
    <original>H</original>
    <variation>Y</variation>
    <location>
        <position position="655"/>
    </location>
</feature>
<feature type="sequence variant" description="In strain: Eta/B.1.525." evidence="51">
    <original>Q</original>
    <variation>H</variation>
    <location>
        <position position="677"/>
    </location>
</feature>
<feature type="sequence variant" description="In strain: Omicron/BA.1, Omicron/BA.2, Omicron/BA.2.12.1, Omicron/BA.4, Omicron/BA.5, Omicron/BQ.1.1, Omicron/XBB.1.5, Omicron/EG.5.1." evidence="51">
    <original>N</original>
    <variation>K</variation>
    <location>
        <position position="679"/>
    </location>
</feature>
<feature type="sequence variant" description="In strain: Alpha/B.1.1.7, Theta/P.3, Mu/B.1.621, B.1.1.318, A23.1, Omicron/BA.1, Omicron/BA.2, Omicron/BA.2.12.1, Omicron/BA.2.75, Omicron/BA.4, Omicron/BA.5, Omicron/BQ.1.1, Omicron/XBB.1.5, Omicron/EG.5.1." evidence="51 57">
    <original>P</original>
    <variation>H</variation>
    <location>
        <position position="681"/>
    </location>
</feature>
<feature type="sequence variant" description="In strain: Delta/B.1.617.2, Kappa/B.1.617.1.">
    <original>P</original>
    <variation>R</variation>
    <location>
        <position position="681"/>
    </location>
</feature>
<feature type="sequence variant" description="In strain: Beta/B.1.351, Iota/B.1.526." evidence="51 59">
    <original>A</original>
    <variation>V</variation>
    <location>
        <position position="701"/>
    </location>
</feature>
<feature type="sequence variant" description="In strain: Omicron/BA.2.12.1." evidence="51">
    <original>S</original>
    <variation>L</variation>
    <location>
        <position position="704"/>
    </location>
</feature>
<feature type="sequence variant" description="In strain: Alpha/B.1.1.7." evidence="57">
    <original>T</original>
    <variation>I</variation>
    <location>
        <position position="716"/>
    </location>
</feature>
<feature type="sequence variant" description="In strain: Omicron/BA.1, Omicron/BA.2, Omicron/BA.2.12.1, Omicron/BA.2.75, Omicron/BA.4, Omicron/BA.5, Omicron/BQ.1.1, Omicron/XBB.1.5, Omicron/EG.5.1." evidence="51">
    <original>N</original>
    <variation>K</variation>
    <location>
        <position position="764"/>
    </location>
</feature>
<feature type="sequence variant" description="In strain: B.1.1.318." evidence="51">
    <original>D</original>
    <variation>H</variation>
    <location>
        <position position="796"/>
    </location>
</feature>
<feature type="sequence variant" description="In strain: 19B/501Y, Omicron/BA.1, Omicron/BA.2, Omicron/BA.2.12.1, Omicron/BA.2.75, Omicron/BA.4, Omicron/BA.5, Omicron/BQ.1.1, Omicron/XBB.1.5, Omicron/EG.5.1." evidence="51">
    <original>D</original>
    <variation>Y</variation>
    <location>
        <position position="796"/>
    </location>
</feature>
<feature type="sequence variant" description="In strain: Omicron/BA.1." evidence="51">
    <original>N</original>
    <variation>K</variation>
    <location>
        <position position="856"/>
    </location>
</feature>
<feature type="sequence variant" description="In strain: Lambda/C.37." evidence="51">
    <original>T</original>
    <variation>N</variation>
    <location>
        <position position="859"/>
    </location>
</feature>
<feature type="sequence variant" description="In strain: Eta/B.1.525." evidence="51">
    <original>F</original>
    <variation>L</variation>
    <location>
        <position position="888"/>
    </location>
</feature>
<feature type="sequence variant" description="In strain: Delta/B.1.617.2, Mu/B.1.621." evidence="51">
    <original>D</original>
    <variation>N</variation>
    <location>
        <position position="950"/>
    </location>
</feature>
<feature type="sequence variant" description="In strain: Omicron/BA.1, Omicron/BA.2, Omicron/BA.2.12.1, Omicron/BA.2.75, Omicron/BA.4, Omicron/BA.5, Omicron/BQ.1.1, Omicron/XBB.1.5, Omicron/EG.5.1." evidence="51">
    <original>Q</original>
    <variation>H</variation>
    <location>
        <position position="954"/>
    </location>
</feature>
<feature type="sequence variant" description="In strain: Omicron/BA.1, Omicron/BA.2, Omicron/BA.2.12.1, Omicron/BA.2.75, Omicron/BA.4, Omicron/BA.5, Omicron/BQ.1.1, Omicron/XBB.1.5, Omicron/EG.5.1." evidence="51">
    <original>N</original>
    <variation>K</variation>
    <location>
        <position position="969"/>
    </location>
</feature>
<feature type="sequence variant" description="In strain: Omicron/BA.1." evidence="51">
    <original>L</original>
    <variation>F</variation>
    <location>
        <position position="981"/>
    </location>
</feature>
<feature type="sequence variant" description="In strain: Alpha/B.1.1.7." evidence="57">
    <original>S</original>
    <variation>A</variation>
    <location>
        <position position="982"/>
    </location>
</feature>
<feature type="sequence variant" description="In strain: Gamma/P.1." evidence="51">
    <original>T</original>
    <variation>I</variation>
    <location>
        <position position="1027"/>
    </location>
</feature>
<feature type="sequence variant" description="In strain: Kappa/B.1.617.1." evidence="51">
    <original>Q</original>
    <variation>H</variation>
    <location>
        <position position="1071"/>
    </location>
</feature>
<feature type="sequence variant" description="In strain: Theta/P.3." evidence="51">
    <original>E</original>
    <variation>K</variation>
    <location>
        <position position="1092"/>
    </location>
</feature>
<feature type="sequence variant" description="In strain: Theta/P.3." evidence="51">
    <original>H</original>
    <variation>Y</variation>
    <location>
        <position position="1101"/>
    </location>
</feature>
<feature type="sequence variant" description="In strain: Alpha/B.1.1.7." evidence="57">
    <original>D</original>
    <variation>H</variation>
    <location>
        <position position="1118"/>
    </location>
</feature>
<feature type="sequence variant" description="In strain: Gamma/P.1, Theta/P.3, Zeta/P.2." evidence="51">
    <original>V</original>
    <variation>F</variation>
    <location>
        <position position="1176"/>
    </location>
</feature>
<feature type="sequence variant" description="In strain: 19B/501Y." evidence="51">
    <original>G</original>
    <variation>V</variation>
    <location>
        <position position="1219"/>
    </location>
</feature>
<feature type="mutagenesis site" description="Increased incorporation of cleaved spike into virions." evidence="35">
    <location>
        <begin position="69"/>
        <end position="70"/>
    </location>
</feature>
<feature type="mutagenesis site" description="Partial loss of biliverdin affinity." evidence="33">
    <original>N</original>
    <variation>Q</variation>
    <location>
        <position position="121"/>
    </location>
</feature>
<feature type="mutagenesis site" description="Partial loss of biliverdin affinity." evidence="33">
    <original>R</original>
    <variation>K</variation>
    <location>
        <position position="190"/>
    </location>
</feature>
<feature type="mutagenesis site" description="Increased resistance to neutralizing antibodies." evidence="18">
    <original>N</original>
    <variation>Q</variation>
    <location>
        <position position="234"/>
    </location>
</feature>
<feature type="mutagenesis site" description="Reduced viral infectivity." evidence="18">
    <original>N</original>
    <variation>Q</variation>
    <location>
        <position position="331"/>
    </location>
</feature>
<feature type="mutagenesis site" description="Reduced viral infectivity." evidence="18">
    <original>N</original>
    <variation>Q</variation>
    <location>
        <position position="343"/>
    </location>
</feature>
<feature type="mutagenesis site" description="Increased resistance to neutralizing antibodies. Decreases HLA binding to NF9 epitope. Increased binding affinity to human ACE2." evidence="18 36">
    <original>L</original>
    <variation>R</variation>
    <location>
        <position position="452"/>
    </location>
</feature>
<feature type="mutagenesis site" description="Decreased HLA binding to NF9 epitope. Increased binding affinity to human ACE2." evidence="36">
    <original>Y</original>
    <variation>F</variation>
    <location>
        <position position="453"/>
    </location>
</feature>
<feature type="mutagenesis site" description="Increased resistance to neutralizing antibodies." evidence="18">
    <original>A</original>
    <variation>V</variation>
    <location>
        <position position="475"/>
    </location>
</feature>
<feature type="mutagenesis site" description="Increased resistance to neutralizing antibodies." evidence="18">
    <original>V</original>
    <variation>A</variation>
    <location>
        <position position="483"/>
    </location>
</feature>
<feature type="mutagenesis site" description="Increased replication in human TMEM106B overexpressing cells." evidence="48">
    <original>E</original>
    <variation>D</variation>
    <location>
        <position position="484"/>
    </location>
</feature>
<feature type="mutagenesis site" description="Increased resistance to neutralizing antibodies and human covalescent sera neutralization." evidence="18">
    <original>F</original>
    <variation>L</variation>
    <location>
        <position position="490"/>
    </location>
</feature>
<feature type="mutagenesis site" description="Reduced host ACE2-binding affinity in vitro." evidence="10">
    <original>Q</original>
    <variation>N</variation>
    <location>
        <position position="493"/>
    </location>
</feature>
<feature type="mutagenesis site" description="Reduced host ACE2-binding affinity in vitro." evidence="10">
    <original>Q</original>
    <variation>Y</variation>
    <location>
        <position position="493"/>
    </location>
</feature>
<feature type="mutagenesis site" description="Reduced host ACE2-binding affinity in vitro." evidence="10">
    <original>N</original>
    <variation>T</variation>
    <location>
        <position position="501"/>
    </location>
</feature>
<feature type="mutagenesis site" description="Increased binding affinity to human ACE2." evidence="36">
    <original>N</original>
    <variation>Y</variation>
    <location>
        <position position="501"/>
    </location>
</feature>
<feature type="mutagenesis site" description="Increased resistance to human covalescent sera neutralization." evidence="18">
    <original>H</original>
    <variation>P</variation>
    <location>
        <position position="519"/>
    </location>
</feature>
<feature type="mutagenesis site" description="Increase of pseudotyped VSV particle production ex vivo. Increase of viral load in hamster upper respiratory tract. Produces more infectious particles when cultured in primary human epithelial cells; increases replication and transmissibility in hamsters and ferrets." evidence="16 26 32">
    <original>D</original>
    <variation>G</variation>
    <location>
        <position position="614"/>
    </location>
</feature>
<feature type="mutagenesis site" description="No effect on O-glycosylation by host GALNT1." evidence="41">
    <original>S</original>
    <variation>A</variation>
    <location>
        <position position="673"/>
    </location>
</feature>
<feature type="mutagenesis site" description="Partial loss of O-glycosylation by host GALNT1." evidence="41">
    <original>T</original>
    <variation>A</variation>
    <location>
        <position position="676"/>
    </location>
</feature>
<feature type="mutagenesis site" description="Complete loss of O-glycosylation by host GALNT1." evidence="41">
    <original>T</original>
    <variation>A</variation>
    <location>
        <position position="678"/>
    </location>
</feature>
<feature type="mutagenesis site" description="About 50% stronger entry efficiency in Vero E6 cells while 30% weaker entry efficiency in hACE2-expressing BHK cells." evidence="8">
    <original>NSPRRA</original>
    <variation>IL</variation>
    <location>
        <begin position="679"/>
        <end position="684"/>
    </location>
</feature>
<feature type="mutagenesis site" description="No effect on O-glycosylation by host GALNT1." evidence="41">
    <original>S</original>
    <variation>A</variation>
    <location>
        <position position="680"/>
    </location>
</feature>
<feature type="mutagenesis site" description="Optimized cleavage by host furin." evidence="13">
    <original>PRRA</original>
    <variation>RRRK</variation>
    <location>
        <begin position="681"/>
        <end position="684"/>
    </location>
</feature>
<feature type="mutagenesis site" description="Complete loss of O-glycosylation by host GALNT1." evidence="41">
    <original>P</original>
    <variation>A</variation>
    <variation>H</variation>
    <variation>R</variation>
    <location>
        <position position="681"/>
    </location>
</feature>
<feature type="mutagenesis site" description="Stabilization in prefusion state (in vaccine Ad26.COV2.S/Janssen Pharmaceutical)." evidence="61">
    <original>RRAR</original>
    <variation>SRAG</variation>
    <location>
        <begin position="682"/>
        <end position="685"/>
    </location>
</feature>
<feature type="mutagenesis site" description="Complete loss of cleavage by host furin." evidence="13">
    <location>
        <begin position="682"/>
        <end position="684"/>
    </location>
</feature>
<feature type="mutagenesis site" description="Partial improvement of cleavage by host furin." evidence="17">
    <original>A</original>
    <variation>K</variation>
    <variation>R</variation>
    <location>
        <position position="684"/>
    </location>
</feature>
<feature type="mutagenesis site" description="Stabilization in prefusion state (in vaccine BNT162b2/Pfizer-Biontech, vaccine mRNA-1273/Moderna, vaccine Ad26.COV2.S/Janssen Pharmaceutical)." evidence="38">
    <original>KV</original>
    <variation>PP</variation>
    <location>
        <begin position="986"/>
        <end position="987"/>
    </location>
</feature>
<feature type="mutagenesis site" description="Complete loss of COPI binding and increase in cell fusion." evidence="39">
    <original>K</original>
    <variation>A</variation>
    <location>
        <position position="1269"/>
    </location>
</feature>
<feature type="mutagenesis site" description="Improved COPI binding, reduced cell fusion and reduced levels of S1/S2 cleavage." evidence="39">
    <original>H</original>
    <variation>K</variation>
    <location>
        <position position="1271"/>
    </location>
</feature>
<feature type="strand" evidence="111">
    <location>
        <begin position="20"/>
        <end position="23"/>
    </location>
</feature>
<feature type="strand" evidence="69">
    <location>
        <begin position="27"/>
        <end position="30"/>
    </location>
</feature>
<feature type="strand" evidence="104">
    <location>
        <begin position="35"/>
        <end position="37"/>
    </location>
</feature>
<feature type="strand" evidence="110">
    <location>
        <begin position="40"/>
        <end position="43"/>
    </location>
</feature>
<feature type="strand" evidence="69">
    <location>
        <begin position="46"/>
        <end position="55"/>
    </location>
</feature>
<feature type="strand" evidence="69">
    <location>
        <begin position="61"/>
        <end position="69"/>
    </location>
</feature>
<feature type="strand" evidence="85">
    <location>
        <begin position="72"/>
        <end position="74"/>
    </location>
</feature>
<feature type="strand" evidence="69">
    <location>
        <begin position="77"/>
        <end position="79"/>
    </location>
</feature>
<feature type="strand" evidence="69">
    <location>
        <begin position="83"/>
        <end position="85"/>
    </location>
</feature>
<feature type="helix" evidence="97">
    <location>
        <begin position="86"/>
        <end position="88"/>
    </location>
</feature>
<feature type="strand" evidence="69">
    <location>
        <begin position="90"/>
        <end position="98"/>
    </location>
</feature>
<feature type="strand" evidence="69">
    <location>
        <begin position="101"/>
        <end position="109"/>
    </location>
</feature>
<feature type="strand" evidence="110">
    <location>
        <begin position="111"/>
        <end position="114"/>
    </location>
</feature>
<feature type="strand" evidence="69">
    <location>
        <begin position="116"/>
        <end position="121"/>
    </location>
</feature>
<feature type="strand" evidence="103">
    <location>
        <begin position="122"/>
        <end position="124"/>
    </location>
</feature>
<feature type="strand" evidence="69">
    <location>
        <begin position="126"/>
        <end position="146"/>
    </location>
</feature>
<feature type="turn" evidence="69">
    <location>
        <begin position="147"/>
        <end position="150"/>
    </location>
</feature>
<feature type="strand" evidence="69">
    <location>
        <begin position="151"/>
        <end position="171"/>
    </location>
</feature>
<feature type="strand" evidence="76">
    <location>
        <begin position="179"/>
        <end position="181"/>
    </location>
</feature>
<feature type="strand" evidence="69">
    <location>
        <begin position="184"/>
        <end position="197"/>
    </location>
</feature>
<feature type="strand" evidence="69">
    <location>
        <begin position="200"/>
        <end position="215"/>
    </location>
</feature>
<feature type="strand" evidence="71">
    <location>
        <begin position="219"/>
        <end position="222"/>
    </location>
</feature>
<feature type="strand" evidence="69">
    <location>
        <begin position="223"/>
        <end position="230"/>
    </location>
</feature>
<feature type="strand" evidence="69">
    <location>
        <begin position="237"/>
        <end position="247"/>
    </location>
</feature>
<feature type="strand" evidence="107">
    <location>
        <begin position="250"/>
        <end position="252"/>
    </location>
</feature>
<feature type="turn" evidence="69">
    <location>
        <begin position="254"/>
        <end position="256"/>
    </location>
</feature>
<feature type="turn" evidence="115">
    <location>
        <begin position="259"/>
        <end position="261"/>
    </location>
</feature>
<feature type="strand" evidence="69">
    <location>
        <begin position="263"/>
        <end position="269"/>
    </location>
</feature>
<feature type="strand" evidence="69">
    <location>
        <begin position="271"/>
        <end position="279"/>
    </location>
</feature>
<feature type="strand" evidence="94">
    <location>
        <begin position="281"/>
        <end position="283"/>
    </location>
</feature>
<feature type="strand" evidence="69">
    <location>
        <begin position="285"/>
        <end position="290"/>
    </location>
</feature>
<feature type="turn" evidence="104">
    <location>
        <begin position="291"/>
        <end position="293"/>
    </location>
</feature>
<feature type="helix" evidence="69">
    <location>
        <begin position="295"/>
        <end position="303"/>
    </location>
</feature>
<feature type="strand" evidence="109">
    <location>
        <begin position="305"/>
        <end position="307"/>
    </location>
</feature>
<feature type="strand" evidence="110">
    <location>
        <begin position="310"/>
        <end position="319"/>
    </location>
</feature>
<feature type="strand" evidence="110">
    <location>
        <begin position="324"/>
        <end position="328"/>
    </location>
</feature>
<feature type="helix" evidence="72">
    <location>
        <begin position="332"/>
        <end position="334"/>
    </location>
</feature>
<feature type="helix" evidence="101">
    <location>
        <begin position="338"/>
        <end position="342"/>
    </location>
</feature>
<feature type="strand" evidence="87">
    <location>
        <begin position="344"/>
        <end position="346"/>
    </location>
</feature>
<feature type="helix" evidence="101">
    <location>
        <begin position="350"/>
        <end position="352"/>
    </location>
</feature>
<feature type="strand" evidence="101">
    <location>
        <begin position="354"/>
        <end position="358"/>
    </location>
</feature>
<feature type="strand" evidence="101">
    <location>
        <begin position="360"/>
        <end position="362"/>
    </location>
</feature>
<feature type="helix" evidence="101">
    <location>
        <begin position="365"/>
        <end position="369"/>
    </location>
</feature>
<feature type="helix" evidence="83">
    <location>
        <begin position="371"/>
        <end position="373"/>
    </location>
</feature>
<feature type="strand" evidence="101">
    <location>
        <begin position="375"/>
        <end position="382"/>
    </location>
</feature>
<feature type="helix" evidence="101">
    <location>
        <begin position="384"/>
        <end position="389"/>
    </location>
</feature>
<feature type="strand" evidence="101">
    <location>
        <begin position="391"/>
        <end position="403"/>
    </location>
</feature>
<feature type="helix" evidence="101">
    <location>
        <begin position="404"/>
        <end position="409"/>
    </location>
</feature>
<feature type="strand" evidence="93">
    <location>
        <begin position="410"/>
        <end position="412"/>
    </location>
</feature>
<feature type="strand" evidence="100">
    <location>
        <begin position="414"/>
        <end position="416"/>
    </location>
</feature>
<feature type="helix" evidence="101">
    <location>
        <begin position="417"/>
        <end position="421"/>
    </location>
</feature>
<feature type="strand" evidence="75">
    <location>
        <begin position="427"/>
        <end position="429"/>
    </location>
</feature>
<feature type="strand" evidence="101">
    <location>
        <begin position="431"/>
        <end position="437"/>
    </location>
</feature>
<feature type="helix" evidence="101">
    <location>
        <begin position="439"/>
        <end position="442"/>
    </location>
</feature>
<feature type="strand" evidence="123">
    <location>
        <begin position="445"/>
        <end position="447"/>
    </location>
</feature>
<feature type="strand" evidence="81">
    <location>
        <begin position="448"/>
        <end position="450"/>
    </location>
</feature>
<feature type="strand" evidence="101">
    <location>
        <begin position="452"/>
        <end position="454"/>
    </location>
</feature>
<feature type="strand" evidence="108">
    <location>
        <begin position="458"/>
        <end position="460"/>
    </location>
</feature>
<feature type="strand" evidence="114">
    <location>
        <begin position="465"/>
        <end position="467"/>
    </location>
</feature>
<feature type="strand" evidence="77">
    <location>
        <begin position="470"/>
        <end position="472"/>
    </location>
</feature>
<feature type="strand" evidence="101">
    <location>
        <begin position="476"/>
        <end position="478"/>
    </location>
</feature>
<feature type="strand" evidence="80">
    <location>
        <begin position="481"/>
        <end position="483"/>
    </location>
</feature>
<feature type="strand" evidence="124">
    <location>
        <begin position="485"/>
        <end position="489"/>
    </location>
</feature>
<feature type="strand" evidence="101">
    <location>
        <begin position="491"/>
        <end position="494"/>
    </location>
</feature>
<feature type="helix" evidence="84">
    <location>
        <begin position="495"/>
        <end position="497"/>
    </location>
</feature>
<feature type="strand" evidence="103">
    <location>
        <begin position="499"/>
        <end position="501"/>
    </location>
</feature>
<feature type="helix" evidence="101">
    <location>
        <begin position="503"/>
        <end position="505"/>
    </location>
</feature>
<feature type="strand" evidence="101">
    <location>
        <begin position="506"/>
        <end position="516"/>
    </location>
</feature>
<feature type="strand" evidence="120">
    <location>
        <begin position="518"/>
        <end position="520"/>
    </location>
</feature>
<feature type="strand" evidence="106">
    <location>
        <begin position="523"/>
        <end position="525"/>
    </location>
</feature>
<feature type="helix" evidence="98">
    <location>
        <begin position="527"/>
        <end position="529"/>
    </location>
</feature>
<feature type="strand" evidence="110">
    <location>
        <begin position="536"/>
        <end position="543"/>
    </location>
</feature>
<feature type="strand" evidence="110">
    <location>
        <begin position="546"/>
        <end position="554"/>
    </location>
</feature>
<feature type="strand" evidence="90">
    <location>
        <begin position="561"/>
        <end position="563"/>
    </location>
</feature>
<feature type="strand" evidence="110">
    <location>
        <begin position="565"/>
        <end position="567"/>
    </location>
</feature>
<feature type="strand" evidence="110">
    <location>
        <begin position="571"/>
        <end position="577"/>
    </location>
</feature>
<feature type="strand" evidence="110">
    <location>
        <begin position="579"/>
        <end position="581"/>
    </location>
</feature>
<feature type="strand" evidence="110">
    <location>
        <begin position="584"/>
        <end position="588"/>
    </location>
</feature>
<feature type="strand" evidence="110">
    <location>
        <begin position="592"/>
        <end position="599"/>
    </location>
</feature>
<feature type="turn" evidence="110">
    <location>
        <begin position="602"/>
        <end position="604"/>
    </location>
</feature>
<feature type="strand" evidence="110">
    <location>
        <begin position="609"/>
        <end position="613"/>
    </location>
</feature>
<feature type="turn" evidence="110">
    <location>
        <begin position="617"/>
        <end position="619"/>
    </location>
</feature>
<feature type="helix" evidence="107">
    <location>
        <begin position="620"/>
        <end position="622"/>
    </location>
</feature>
<feature type="strand" evidence="119">
    <location>
        <begin position="624"/>
        <end position="626"/>
    </location>
</feature>
<feature type="strand" evidence="120">
    <location>
        <begin position="628"/>
        <end position="631"/>
    </location>
</feature>
<feature type="strand" evidence="86">
    <location>
        <begin position="634"/>
        <end position="636"/>
    </location>
</feature>
<feature type="turn" evidence="120">
    <location>
        <begin position="637"/>
        <end position="639"/>
    </location>
</feature>
<feature type="strand" evidence="110">
    <location>
        <begin position="642"/>
        <end position="645"/>
    </location>
</feature>
<feature type="strand" evidence="110">
    <location>
        <begin position="648"/>
        <end position="652"/>
    </location>
</feature>
<feature type="strand" evidence="121">
    <location>
        <begin position="654"/>
        <end position="660"/>
    </location>
</feature>
<feature type="strand" evidence="110">
    <location>
        <begin position="663"/>
        <end position="667"/>
    </location>
</feature>
<feature type="strand" evidence="110">
    <location>
        <begin position="670"/>
        <end position="674"/>
    </location>
</feature>
<feature type="strand" evidence="95">
    <location>
        <begin position="676"/>
        <end position="678"/>
    </location>
</feature>
<feature type="helix" evidence="94">
    <location>
        <begin position="680"/>
        <end position="684"/>
    </location>
</feature>
<feature type="strand" evidence="96">
    <location>
        <begin position="686"/>
        <end position="688"/>
    </location>
</feature>
<feature type="strand" evidence="82">
    <location>
        <begin position="689"/>
        <end position="691"/>
    </location>
</feature>
<feature type="strand" evidence="110">
    <location>
        <begin position="692"/>
        <end position="697"/>
    </location>
</feature>
<feature type="strand" evidence="110">
    <location>
        <begin position="701"/>
        <end position="704"/>
    </location>
</feature>
<feature type="turn" evidence="113">
    <location>
        <begin position="705"/>
        <end position="707"/>
    </location>
</feature>
<feature type="strand" evidence="110">
    <location>
        <begin position="711"/>
        <end position="713"/>
    </location>
</feature>
<feature type="strand" evidence="116">
    <location>
        <begin position="714"/>
        <end position="716"/>
    </location>
</feature>
<feature type="strand" evidence="110">
    <location>
        <begin position="718"/>
        <end position="728"/>
    </location>
</feature>
<feature type="strand" evidence="110">
    <location>
        <begin position="733"/>
        <end position="736"/>
    </location>
</feature>
<feature type="helix" evidence="110">
    <location>
        <begin position="738"/>
        <end position="743"/>
    </location>
</feature>
<feature type="helix" evidence="110">
    <location>
        <begin position="747"/>
        <end position="753"/>
    </location>
</feature>
<feature type="helix" evidence="110">
    <location>
        <begin position="754"/>
        <end position="756"/>
    </location>
</feature>
<feature type="helix" evidence="102">
    <location>
        <begin position="757"/>
        <end position="790"/>
    </location>
</feature>
<feature type="helix" evidence="102">
    <location>
        <begin position="796"/>
        <end position="809"/>
    </location>
</feature>
<feature type="helix" evidence="102">
    <location>
        <begin position="813"/>
        <end position="818"/>
    </location>
</feature>
<feature type="helix" evidence="102">
    <location>
        <begin position="820"/>
        <end position="826"/>
    </location>
</feature>
<feature type="helix" evidence="92">
    <location>
        <begin position="827"/>
        <end position="830"/>
    </location>
</feature>
<feature type="helix" evidence="102">
    <location>
        <begin position="831"/>
        <end position="859"/>
    </location>
</feature>
<feature type="turn" evidence="99">
    <location>
        <begin position="867"/>
        <end position="869"/>
    </location>
</feature>
<feature type="helix" evidence="102">
    <location>
        <begin position="872"/>
        <end position="877"/>
    </location>
</feature>
<feature type="helix" evidence="70">
    <location>
        <begin position="880"/>
        <end position="883"/>
    </location>
</feature>
<feature type="helix" evidence="102">
    <location>
        <begin position="884"/>
        <end position="901"/>
    </location>
</feature>
<feature type="helix" evidence="102">
    <location>
        <begin position="902"/>
        <end position="905"/>
    </location>
</feature>
<feature type="helix" evidence="74">
    <location>
        <begin position="909"/>
        <end position="956"/>
    </location>
</feature>
<feature type="strand" evidence="117">
    <location>
        <begin position="957"/>
        <end position="959"/>
    </location>
</feature>
<feature type="helix" evidence="117">
    <location>
        <begin position="960"/>
        <end position="964"/>
    </location>
</feature>
<feature type="helix" evidence="110">
    <location>
        <begin position="965"/>
        <end position="967"/>
    </location>
</feature>
<feature type="strand" evidence="118">
    <location>
        <begin position="970"/>
        <end position="973"/>
    </location>
</feature>
<feature type="helix" evidence="110">
    <location>
        <begin position="977"/>
        <end position="983"/>
    </location>
</feature>
<feature type="turn" evidence="122">
    <location>
        <begin position="986"/>
        <end position="989"/>
    </location>
</feature>
<feature type="turn" evidence="73">
    <location>
        <begin position="994"/>
        <end position="996"/>
    </location>
</feature>
<feature type="helix" evidence="68">
    <location>
        <begin position="1009"/>
        <end position="1021"/>
    </location>
</feature>
<feature type="helix" evidence="68">
    <location>
        <begin position="1022"/>
        <end position="1025"/>
    </location>
</feature>
<feature type="helix" evidence="68">
    <location>
        <begin position="1029"/>
        <end position="1031"/>
    </location>
</feature>
<feature type="turn" evidence="108">
    <location>
        <begin position="1032"/>
        <end position="1034"/>
    </location>
</feature>
<feature type="turn" evidence="110">
    <location>
        <begin position="1040"/>
        <end position="1042"/>
    </location>
</feature>
<feature type="strand" evidence="110">
    <location>
        <begin position="1043"/>
        <end position="1056"/>
    </location>
</feature>
<feature type="strand" evidence="110">
    <location>
        <begin position="1059"/>
        <end position="1069"/>
    </location>
</feature>
<feature type="strand" evidence="89">
    <location>
        <begin position="1071"/>
        <end position="1073"/>
    </location>
</feature>
<feature type="strand" evidence="110">
    <location>
        <begin position="1074"/>
        <end position="1079"/>
    </location>
</feature>
<feature type="strand" evidence="110">
    <location>
        <begin position="1081"/>
        <end position="1100"/>
    </location>
</feature>
<feature type="strand" evidence="110">
    <location>
        <begin position="1102"/>
        <end position="1105"/>
    </location>
</feature>
<feature type="strand" evidence="85">
    <location>
        <begin position="1107"/>
        <end position="1109"/>
    </location>
</feature>
<feature type="strand" evidence="91">
    <location>
        <begin position="1112"/>
        <end position="1114"/>
    </location>
</feature>
<feature type="strand" evidence="110">
    <location>
        <begin position="1119"/>
        <end position="1125"/>
    </location>
</feature>
<feature type="turn" evidence="110">
    <location>
        <begin position="1126"/>
        <end position="1128"/>
    </location>
</feature>
<feature type="strand" evidence="105">
    <location>
        <begin position="1129"/>
        <end position="1131"/>
    </location>
</feature>
<feature type="strand" evidence="88">
    <location>
        <begin position="1132"/>
        <end position="1134"/>
    </location>
</feature>
<feature type="turn" evidence="78">
    <location>
        <begin position="1140"/>
        <end position="1144"/>
    </location>
</feature>
<feature type="helix" evidence="79">
    <location>
        <begin position="1148"/>
        <end position="1155"/>
    </location>
</feature>
<feature type="turn" evidence="112">
    <location>
        <begin position="1156"/>
        <end position="1158"/>
    </location>
</feature>
<feature type="helix" evidence="102">
    <location>
        <begin position="1169"/>
        <end position="1171"/>
    </location>
</feature>
<feature type="helix" evidence="74">
    <location>
        <begin position="1180"/>
        <end position="1192"/>
    </location>
</feature>
<feature type="helix" evidence="74">
    <location>
        <begin position="1193"/>
        <end position="1196"/>
    </location>
</feature>
<feature type="turn" evidence="113">
    <location>
        <begin position="1214"/>
        <end position="1218"/>
    </location>
</feature>
<feature type="helix" evidence="113">
    <location>
        <begin position="1219"/>
        <end position="1233"/>
    </location>
</feature>
<feature type="helix" evidence="113">
    <location>
        <begin position="1238"/>
        <end position="1248"/>
    </location>
</feature>